<comment type="function">
    <text evidence="3 4 6 7 8 9 10 12 15 19 21 22 23 24 25 26 27 28 29 30 32 33 34 35 36 37 38 39 40 41 42 43 44 45 46 47 48 49 50 51 52 55 57 64 66 67 69 71 73 75 76 80 81">Catalyzes the reversible hydration of carbon dioxide (PubMed:11327835, PubMed:11802772, PubMed:11831900, PubMed:12056894, PubMed:12171926, PubMed:1336460, PubMed:14736236, PubMed:15300855, PubMed:15453828, PubMed:15667203, PubMed:15865431, PubMed:16106378, PubMed:16214338, PubMed:16290146, PubMed:16686544, PubMed:16759856, PubMed:16807956, PubMed:17127057, PubMed:17251017, PubMed:17314045, PubMed:17330962, PubMed:17346964, PubMed:17540563, PubMed:17588751, PubMed:17705204, PubMed:18024029, PubMed:18162396, PubMed:18266323, PubMed:18374572, PubMed:18481843, PubMed:18618712, PubMed:18640037, PubMed:18942852, PubMed:1909891, PubMed:1910042, PubMed:19170619, PubMed:19186056, PubMed:19206230, PubMed:19520834, PubMed:19778001, PubMed:7761440, PubMed:7901850, PubMed:8218160, PubMed:8262987, PubMed:8399159, PubMed:8451242, PubMed:8485129, PubMed:8639494, PubMed:9265618, PubMed:9398308). Can also hydrate cyanamide to urea (PubMed:10550681, PubMed:11015219). Stimulates the chloride-bicarbonate exchange activity of SLC26A6 (PubMed:15990874). Essential for bone resorption and osteoclast differentiation (PubMed:15300855). Involved in the regulation of fluid secretion into the anterior chamber of the eye. Contributes to intracellular pH regulation in the duodenal upper villous epithelium during proton-coupled peptide absorption.</text>
</comment>
<comment type="catalytic activity">
    <reaction evidence="6 7 8 9 10 12 15 19 21 22 23 25 26 27 28 29 30 32 33 34 35 36 37 38 39 40 41 42 43 44 45 46 47 48 49 50 51 52 55 57 64 66 67 69 71 73 75 76 80 81">
        <text>hydrogencarbonate + H(+) = CO2 + H2O</text>
        <dbReference type="Rhea" id="RHEA:10748"/>
        <dbReference type="ChEBI" id="CHEBI:15377"/>
        <dbReference type="ChEBI" id="CHEBI:15378"/>
        <dbReference type="ChEBI" id="CHEBI:16526"/>
        <dbReference type="ChEBI" id="CHEBI:17544"/>
        <dbReference type="EC" id="4.2.1.1"/>
    </reaction>
</comment>
<comment type="catalytic activity">
    <reaction evidence="3 4">
        <text>urea = cyanamide + H2O</text>
        <dbReference type="Rhea" id="RHEA:23056"/>
        <dbReference type="ChEBI" id="CHEBI:15377"/>
        <dbReference type="ChEBI" id="CHEBI:16199"/>
        <dbReference type="ChEBI" id="CHEBI:16698"/>
        <dbReference type="EC" id="4.2.1.69"/>
    </reaction>
</comment>
<comment type="cofactor">
    <cofactor evidence="5 11 12 13 48 56 58 59 64 65 66 67 69 70 71 72 73 74 76 78 81 82">
        <name>Zn(2+)</name>
        <dbReference type="ChEBI" id="CHEBI:29105"/>
    </cofactor>
    <cofactor evidence="56">
        <name>Co(2+)</name>
        <dbReference type="ChEBI" id="CHEBI:48828"/>
    </cofactor>
    <text evidence="56">Zinc. Can also use cobalt(II) with lower efficiency, but not copper(II), nickel(II) and manganese(II).</text>
</comment>
<comment type="activity regulation">
    <text evidence="7 12 15 26 27 28 29 30 32 34 37 38 39 40 41 42 43 44 45 46 49 50 51 52 55 57 80">Activated by X-ray, histamine, L-adrenaline, L- and D-phenylalanine, L- and D-histidine, L-His-OMe and beta-Ala-His (carnosine). Competitively inhibited by saccharin, thioxolone, coumarins, 667-coumate, celecoxib (Celebrex), valdecoxib (Bextra), SC-125, SC-560, diclofenac, acetate, azide, bromide, sulfonamide derivatives such as acetazolamide (AZA), methazolamide (MZA), ethoxzolamide (EZA), dichlorophenamide (DCP), brinzolamide, dansylamide, thiabendazole-5-sulfonamide, trifluoromethane sulfonamide and N-hydroxysulfamide, fructose-based sugar sulfamate RWJ-37497, and Foscarnet (phosphonoformate trisodium salt). Repressed strongly by hydrogen sulfide(HS) and weakly by nitrate (NO(3)). Esterase activity weakly reduced by cyanamide. N-hydroxyurea interferes with zinc binding and inhibit activity.</text>
</comment>
<comment type="biophysicochemical properties">
    <kinetics>
        <KM evidence="45 64">9.3 mM for CO(2)</KM>
        <KM evidence="48">11 mM for CO(2)</KM>
        <KM evidence="81">8.2 mM for CO(2)</KM>
        <KM evidence="69">82 mM for H(2)CO(3)</KM>
        <KM evidence="3">2.9 mM for 4-nitrophenyl acetate</KM>
    </kinetics>
    <phDependence>
        <text evidence="22 35 47 69 81">Optimum pH is 6-8.</text>
    </phDependence>
</comment>
<comment type="subunit">
    <text evidence="14 16 17 24">Interacts with SLC4A4 (PubMed:14567693, PubMed:15218065). Interaction with SLC4A7 regulates SLC4A7 transporter activity (PubMed:14736710). Interacts with SLC26A6 isoform 4 (via C-terminus cytoplasmic domain) (PubMed:15990874).</text>
</comment>
<comment type="subcellular location">
    <subcellularLocation>
        <location evidence="24">Cytoplasm</location>
    </subcellularLocation>
    <subcellularLocation>
        <location evidence="24">Cell membrane</location>
    </subcellularLocation>
    <text evidence="24">Colocalized with SLC26A6 at the surface of the cell membrane in order to form a bicarbonate transport metabolon. Displaced from the cytosolic surface of the cell membrane by PKC in phorbol myristate acetate (PMA)-induced cells.</text>
</comment>
<comment type="disease" evidence="19 20 53 77 79">
    <disease id="DI-01252">
        <name>Osteopetrosis, autosomal recessive 3</name>
        <acronym>OPTB3</acronym>
        <description>A rare genetic disease characterized by abnormally dense bone, due to defective resorption of immature bone. Osteopetrosis occurs in two forms: a severe autosomal recessive form occurring in utero, infancy, or childhood, and a benign autosomal dominant form occurring in adolescence or adulthood. Recessive osteopetrosis commonly manifests in early infancy with macrocephaly, feeding difficulties, evolving blindness and deafness, bone marrow failure, severe anemia, and hepatosplenomegaly. Deafness and blindness are generally thought to represent effects of pressure on nerves. OPTB3 is associated with renal tubular acidosis, cerebral calcification (marble brain disease) and in some cases with intellectual disability.</description>
        <dbReference type="MIM" id="259730"/>
    </disease>
    <text>The disease is caused by variants affecting the gene represented in this entry.</text>
</comment>
<comment type="miscellaneous">
    <text evidence="33">Target of drugs used in treatments against glaucoma disorder and breast cancer.</text>
</comment>
<comment type="similarity">
    <text evidence="83">Belongs to the alpha-carbonic anhydrase family.</text>
</comment>
<accession>P00918</accession>
<accession>B2R7G8</accession>
<accession>Q6FI12</accession>
<accession>Q96ET9</accession>
<dbReference type="EC" id="4.2.1.1" evidence="10 19 48 49 64 66 81"/>
<dbReference type="EC" id="4.2.1.69" evidence="3"/>
<dbReference type="EMBL" id="M77181">
    <property type="protein sequence ID" value="AAA51909.1"/>
    <property type="molecule type" value="Genomic_DNA"/>
</dbReference>
<dbReference type="EMBL" id="M77176">
    <property type="protein sequence ID" value="AAA51909.1"/>
    <property type="status" value="JOINED"/>
    <property type="molecule type" value="Genomic_DNA"/>
</dbReference>
<dbReference type="EMBL" id="M77177">
    <property type="protein sequence ID" value="AAA51909.1"/>
    <property type="status" value="JOINED"/>
    <property type="molecule type" value="Genomic_DNA"/>
</dbReference>
<dbReference type="EMBL" id="M77178">
    <property type="protein sequence ID" value="AAA51909.1"/>
    <property type="status" value="JOINED"/>
    <property type="molecule type" value="Genomic_DNA"/>
</dbReference>
<dbReference type="EMBL" id="M77179">
    <property type="protein sequence ID" value="AAA51909.1"/>
    <property type="status" value="JOINED"/>
    <property type="molecule type" value="Genomic_DNA"/>
</dbReference>
<dbReference type="EMBL" id="M77180">
    <property type="protein sequence ID" value="AAA51909.1"/>
    <property type="status" value="JOINED"/>
    <property type="molecule type" value="Genomic_DNA"/>
</dbReference>
<dbReference type="EMBL" id="Y00339">
    <property type="protein sequence ID" value="CAA68426.1"/>
    <property type="molecule type" value="mRNA"/>
</dbReference>
<dbReference type="EMBL" id="X03251">
    <property type="protein sequence ID" value="CAA27012.1"/>
    <property type="molecule type" value="Genomic_DNA"/>
</dbReference>
<dbReference type="EMBL" id="J03037">
    <property type="protein sequence ID" value="AAA51908.1"/>
    <property type="molecule type" value="mRNA"/>
</dbReference>
<dbReference type="EMBL" id="CR536526">
    <property type="protein sequence ID" value="CAG38763.1"/>
    <property type="molecule type" value="mRNA"/>
</dbReference>
<dbReference type="EMBL" id="CR541875">
    <property type="protein sequence ID" value="CAG46673.1"/>
    <property type="molecule type" value="mRNA"/>
</dbReference>
<dbReference type="EMBL" id="AK312978">
    <property type="protein sequence ID" value="BAG35815.1"/>
    <property type="molecule type" value="mRNA"/>
</dbReference>
<dbReference type="EMBL" id="CH471068">
    <property type="protein sequence ID" value="EAW87136.1"/>
    <property type="molecule type" value="Genomic_DNA"/>
</dbReference>
<dbReference type="EMBL" id="BC011949">
    <property type="protein sequence ID" value="AAH11949.1"/>
    <property type="molecule type" value="mRNA"/>
</dbReference>
<dbReference type="EMBL" id="M36532">
    <property type="protein sequence ID" value="AAA51911.1"/>
    <property type="molecule type" value="mRNA"/>
</dbReference>
<dbReference type="CCDS" id="CCDS6239.1"/>
<dbReference type="PIR" id="A27175">
    <property type="entry name" value="CRHU2"/>
</dbReference>
<dbReference type="RefSeq" id="NP_000058.1">
    <property type="nucleotide sequence ID" value="NM_000067.3"/>
</dbReference>
<dbReference type="PDB" id="12CA">
    <property type="method" value="X-ray"/>
    <property type="resolution" value="2.40 A"/>
    <property type="chains" value="A=1-260"/>
</dbReference>
<dbReference type="PDB" id="1A42">
    <property type="method" value="X-ray"/>
    <property type="resolution" value="2.25 A"/>
    <property type="chains" value="A=2-260"/>
</dbReference>
<dbReference type="PDB" id="1AM6">
    <property type="method" value="X-ray"/>
    <property type="resolution" value="2.00 A"/>
    <property type="chains" value="A=2-260"/>
</dbReference>
<dbReference type="PDB" id="1AVN">
    <property type="method" value="X-ray"/>
    <property type="resolution" value="2.00 A"/>
    <property type="chains" value="A=2-260"/>
</dbReference>
<dbReference type="PDB" id="1BCD">
    <property type="method" value="X-ray"/>
    <property type="resolution" value="1.90 A"/>
    <property type="chains" value="A=2-260"/>
</dbReference>
<dbReference type="PDB" id="1BIC">
    <property type="method" value="X-ray"/>
    <property type="resolution" value="1.90 A"/>
    <property type="chains" value="A=2-260"/>
</dbReference>
<dbReference type="PDB" id="1BN1">
    <property type="method" value="X-ray"/>
    <property type="resolution" value="2.10 A"/>
    <property type="chains" value="A=2-260"/>
</dbReference>
<dbReference type="PDB" id="1BN3">
    <property type="method" value="X-ray"/>
    <property type="resolution" value="2.20 A"/>
    <property type="chains" value="A=2-260"/>
</dbReference>
<dbReference type="PDB" id="1BN4">
    <property type="method" value="X-ray"/>
    <property type="resolution" value="2.10 A"/>
    <property type="chains" value="A=2-260"/>
</dbReference>
<dbReference type="PDB" id="1BNM">
    <property type="method" value="X-ray"/>
    <property type="resolution" value="2.60 A"/>
    <property type="chains" value="A=2-260"/>
</dbReference>
<dbReference type="PDB" id="1BNN">
    <property type="method" value="X-ray"/>
    <property type="resolution" value="2.30 A"/>
    <property type="chains" value="A=2-260"/>
</dbReference>
<dbReference type="PDB" id="1BNQ">
    <property type="method" value="X-ray"/>
    <property type="resolution" value="2.40 A"/>
    <property type="chains" value="A=2-260"/>
</dbReference>
<dbReference type="PDB" id="1BNT">
    <property type="method" value="X-ray"/>
    <property type="resolution" value="2.15 A"/>
    <property type="chains" value="A=2-260"/>
</dbReference>
<dbReference type="PDB" id="1BNU">
    <property type="method" value="X-ray"/>
    <property type="resolution" value="2.15 A"/>
    <property type="chains" value="A=2-260"/>
</dbReference>
<dbReference type="PDB" id="1BNV">
    <property type="method" value="X-ray"/>
    <property type="resolution" value="2.40 A"/>
    <property type="chains" value="A=2-260"/>
</dbReference>
<dbReference type="PDB" id="1BNW">
    <property type="method" value="X-ray"/>
    <property type="resolution" value="2.25 A"/>
    <property type="chains" value="A=2-260"/>
</dbReference>
<dbReference type="PDB" id="1BV3">
    <property type="method" value="X-ray"/>
    <property type="resolution" value="1.85 A"/>
    <property type="chains" value="A=2-260"/>
</dbReference>
<dbReference type="PDB" id="1CA2">
    <property type="method" value="X-ray"/>
    <property type="resolution" value="2.00 A"/>
    <property type="chains" value="A=2-260"/>
</dbReference>
<dbReference type="PDB" id="1CA3">
    <property type="method" value="X-ray"/>
    <property type="resolution" value="2.30 A"/>
    <property type="chains" value="A=1-260"/>
</dbReference>
<dbReference type="PDB" id="1CAH">
    <property type="method" value="X-ray"/>
    <property type="resolution" value="1.88 A"/>
    <property type="chains" value="A=2-260"/>
</dbReference>
<dbReference type="PDB" id="1CAI">
    <property type="method" value="X-ray"/>
    <property type="resolution" value="1.80 A"/>
    <property type="chains" value="A=2-260"/>
</dbReference>
<dbReference type="PDB" id="1CAJ">
    <property type="method" value="X-ray"/>
    <property type="resolution" value="1.90 A"/>
    <property type="chains" value="A=2-260"/>
</dbReference>
<dbReference type="PDB" id="1CAK">
    <property type="method" value="X-ray"/>
    <property type="resolution" value="1.90 A"/>
    <property type="chains" value="A=2-260"/>
</dbReference>
<dbReference type="PDB" id="1CAL">
    <property type="method" value="X-ray"/>
    <property type="resolution" value="2.20 A"/>
    <property type="chains" value="A=2-260"/>
</dbReference>
<dbReference type="PDB" id="1CAM">
    <property type="method" value="X-ray"/>
    <property type="resolution" value="1.70 A"/>
    <property type="chains" value="A=2-260"/>
</dbReference>
<dbReference type="PDB" id="1CAN">
    <property type="method" value="X-ray"/>
    <property type="resolution" value="1.90 A"/>
    <property type="chains" value="A=2-260"/>
</dbReference>
<dbReference type="PDB" id="1CAO">
    <property type="method" value="X-ray"/>
    <property type="resolution" value="1.90 A"/>
    <property type="chains" value="A=2-260"/>
</dbReference>
<dbReference type="PDB" id="1CAY">
    <property type="method" value="X-ray"/>
    <property type="resolution" value="2.10 A"/>
    <property type="chains" value="A=2-260"/>
</dbReference>
<dbReference type="PDB" id="1CAZ">
    <property type="method" value="X-ray"/>
    <property type="resolution" value="1.90 A"/>
    <property type="chains" value="A=2-260"/>
</dbReference>
<dbReference type="PDB" id="1CCS">
    <property type="method" value="X-ray"/>
    <property type="resolution" value="2.35 A"/>
    <property type="chains" value="A=2-260"/>
</dbReference>
<dbReference type="PDB" id="1CCT">
    <property type="method" value="X-ray"/>
    <property type="resolution" value="2.20 A"/>
    <property type="chains" value="A=2-260"/>
</dbReference>
<dbReference type="PDB" id="1CCU">
    <property type="method" value="X-ray"/>
    <property type="resolution" value="2.25 A"/>
    <property type="chains" value="A=2-260"/>
</dbReference>
<dbReference type="PDB" id="1CIL">
    <property type="method" value="X-ray"/>
    <property type="resolution" value="1.60 A"/>
    <property type="chains" value="A=2-260"/>
</dbReference>
<dbReference type="PDB" id="1CIM">
    <property type="method" value="X-ray"/>
    <property type="resolution" value="2.10 A"/>
    <property type="chains" value="A=2-260"/>
</dbReference>
<dbReference type="PDB" id="1CIN">
    <property type="method" value="X-ray"/>
    <property type="resolution" value="2.10 A"/>
    <property type="chains" value="A=2-260"/>
</dbReference>
<dbReference type="PDB" id="1CNB">
    <property type="method" value="X-ray"/>
    <property type="resolution" value="2.35 A"/>
    <property type="chains" value="A=2-260"/>
</dbReference>
<dbReference type="PDB" id="1CNC">
    <property type="method" value="X-ray"/>
    <property type="resolution" value="2.20 A"/>
    <property type="chains" value="A=2-260"/>
</dbReference>
<dbReference type="PDB" id="1CNG">
    <property type="method" value="X-ray"/>
    <property type="resolution" value="1.90 A"/>
    <property type="chains" value="A=2-260"/>
</dbReference>
<dbReference type="PDB" id="1CNH">
    <property type="method" value="X-ray"/>
    <property type="resolution" value="2.05 A"/>
    <property type="chains" value="A=2-260"/>
</dbReference>
<dbReference type="PDB" id="1CNI">
    <property type="method" value="X-ray"/>
    <property type="resolution" value="1.80 A"/>
    <property type="chains" value="A=2-260"/>
</dbReference>
<dbReference type="PDB" id="1CNJ">
    <property type="method" value="X-ray"/>
    <property type="resolution" value="1.80 A"/>
    <property type="chains" value="A=2-260"/>
</dbReference>
<dbReference type="PDB" id="1CNK">
    <property type="method" value="X-ray"/>
    <property type="resolution" value="2.15 A"/>
    <property type="chains" value="A=2-260"/>
</dbReference>
<dbReference type="PDB" id="1CNW">
    <property type="method" value="X-ray"/>
    <property type="resolution" value="2.00 A"/>
    <property type="chains" value="A=1-260"/>
</dbReference>
<dbReference type="PDB" id="1CNX">
    <property type="method" value="X-ray"/>
    <property type="resolution" value="1.90 A"/>
    <property type="chains" value="A=1-260"/>
</dbReference>
<dbReference type="PDB" id="1CNY">
    <property type="method" value="X-ray"/>
    <property type="resolution" value="2.30 A"/>
    <property type="chains" value="A=1-260"/>
</dbReference>
<dbReference type="PDB" id="1CRA">
    <property type="method" value="X-ray"/>
    <property type="resolution" value="1.90 A"/>
    <property type="chains" value="A=2-260"/>
</dbReference>
<dbReference type="PDB" id="1CVA">
    <property type="method" value="X-ray"/>
    <property type="resolution" value="2.25 A"/>
    <property type="chains" value="A=2-260"/>
</dbReference>
<dbReference type="PDB" id="1CVB">
    <property type="method" value="X-ray"/>
    <property type="resolution" value="2.40 A"/>
    <property type="chains" value="A=2-260"/>
</dbReference>
<dbReference type="PDB" id="1CVC">
    <property type="method" value="X-ray"/>
    <property type="resolution" value="2.30 A"/>
    <property type="chains" value="A=2-260"/>
</dbReference>
<dbReference type="PDB" id="1CVD">
    <property type="method" value="X-ray"/>
    <property type="resolution" value="2.20 A"/>
    <property type="chains" value="A=5-259"/>
</dbReference>
<dbReference type="PDB" id="1CVE">
    <property type="method" value="X-ray"/>
    <property type="resolution" value="2.25 A"/>
    <property type="chains" value="A=2-260"/>
</dbReference>
<dbReference type="PDB" id="1CVF">
    <property type="method" value="X-ray"/>
    <property type="resolution" value="2.25 A"/>
    <property type="chains" value="A=2-260"/>
</dbReference>
<dbReference type="PDB" id="1CVH">
    <property type="method" value="X-ray"/>
    <property type="resolution" value="2.30 A"/>
    <property type="chains" value="A=5-259"/>
</dbReference>
<dbReference type="PDB" id="1DCA">
    <property type="method" value="X-ray"/>
    <property type="resolution" value="2.20 A"/>
    <property type="chains" value="A=1-260"/>
</dbReference>
<dbReference type="PDB" id="1DCB">
    <property type="method" value="X-ray"/>
    <property type="resolution" value="2.10 A"/>
    <property type="chains" value="A=1-260"/>
</dbReference>
<dbReference type="PDB" id="1EOU">
    <property type="method" value="X-ray"/>
    <property type="resolution" value="2.10 A"/>
    <property type="chains" value="A=1-260"/>
</dbReference>
<dbReference type="PDB" id="1F2W">
    <property type="method" value="X-ray"/>
    <property type="resolution" value="1.90 A"/>
    <property type="chains" value="A=2-260"/>
</dbReference>
<dbReference type="PDB" id="1FQL">
    <property type="method" value="X-ray"/>
    <property type="resolution" value="2.00 A"/>
    <property type="chains" value="A=1-260"/>
</dbReference>
<dbReference type="PDB" id="1FQM">
    <property type="method" value="X-ray"/>
    <property type="resolution" value="2.00 A"/>
    <property type="chains" value="A=1-260"/>
</dbReference>
<dbReference type="PDB" id="1FQN">
    <property type="method" value="X-ray"/>
    <property type="resolution" value="2.00 A"/>
    <property type="chains" value="A=1-260"/>
</dbReference>
<dbReference type="PDB" id="1FQR">
    <property type="method" value="X-ray"/>
    <property type="resolution" value="2.00 A"/>
    <property type="chains" value="A=1-260"/>
</dbReference>
<dbReference type="PDB" id="1FR4">
    <property type="method" value="X-ray"/>
    <property type="resolution" value="1.60 A"/>
    <property type="chains" value="A=1-260"/>
</dbReference>
<dbReference type="PDB" id="1FR7">
    <property type="method" value="X-ray"/>
    <property type="resolution" value="1.50 A"/>
    <property type="chains" value="A/B=1-260"/>
</dbReference>
<dbReference type="PDB" id="1FSN">
    <property type="method" value="X-ray"/>
    <property type="resolution" value="2.00 A"/>
    <property type="chains" value="A/B=1-260"/>
</dbReference>
<dbReference type="PDB" id="1FSQ">
    <property type="method" value="X-ray"/>
    <property type="resolution" value="2.00 A"/>
    <property type="chains" value="A/B=1-260"/>
</dbReference>
<dbReference type="PDB" id="1FSR">
    <property type="method" value="X-ray"/>
    <property type="resolution" value="2.00 A"/>
    <property type="chains" value="A/B=1-260"/>
</dbReference>
<dbReference type="PDB" id="1G0E">
    <property type="method" value="X-ray"/>
    <property type="resolution" value="1.60 A"/>
    <property type="chains" value="A=1-260"/>
</dbReference>
<dbReference type="PDB" id="1G0F">
    <property type="method" value="X-ray"/>
    <property type="resolution" value="1.60 A"/>
    <property type="chains" value="A=1-260"/>
</dbReference>
<dbReference type="PDB" id="1G1D">
    <property type="method" value="X-ray"/>
    <property type="resolution" value="2.04 A"/>
    <property type="chains" value="A=2-260"/>
</dbReference>
<dbReference type="PDB" id="1G3Z">
    <property type="method" value="X-ray"/>
    <property type="resolution" value="1.86 A"/>
    <property type="chains" value="A=2-260"/>
</dbReference>
<dbReference type="PDB" id="1G45">
    <property type="method" value="X-ray"/>
    <property type="resolution" value="1.83 A"/>
    <property type="chains" value="A=2-260"/>
</dbReference>
<dbReference type="PDB" id="1G46">
    <property type="method" value="X-ray"/>
    <property type="resolution" value="1.84 A"/>
    <property type="chains" value="A=2-260"/>
</dbReference>
<dbReference type="PDB" id="1G48">
    <property type="method" value="X-ray"/>
    <property type="resolution" value="1.86 A"/>
    <property type="chains" value="A=2-260"/>
</dbReference>
<dbReference type="PDB" id="1G4J">
    <property type="method" value="X-ray"/>
    <property type="resolution" value="1.84 A"/>
    <property type="chains" value="A=2-260"/>
</dbReference>
<dbReference type="PDB" id="1G4O">
    <property type="method" value="X-ray"/>
    <property type="resolution" value="1.96 A"/>
    <property type="chains" value="A=2-260"/>
</dbReference>
<dbReference type="PDB" id="1G52">
    <property type="method" value="X-ray"/>
    <property type="resolution" value="1.80 A"/>
    <property type="chains" value="A=2-260"/>
</dbReference>
<dbReference type="PDB" id="1G53">
    <property type="method" value="X-ray"/>
    <property type="resolution" value="1.94 A"/>
    <property type="chains" value="A=2-260"/>
</dbReference>
<dbReference type="PDB" id="1G54">
    <property type="method" value="X-ray"/>
    <property type="resolution" value="1.86 A"/>
    <property type="chains" value="A=2-260"/>
</dbReference>
<dbReference type="PDB" id="1H4N">
    <property type="method" value="X-ray"/>
    <property type="resolution" value="2.00 A"/>
    <property type="chains" value="A=2-260"/>
</dbReference>
<dbReference type="PDB" id="1H9N">
    <property type="method" value="X-ray"/>
    <property type="resolution" value="1.85 A"/>
    <property type="chains" value="A=2-260"/>
</dbReference>
<dbReference type="PDB" id="1H9Q">
    <property type="method" value="X-ray"/>
    <property type="resolution" value="2.20 A"/>
    <property type="chains" value="A=2-260"/>
</dbReference>
<dbReference type="PDB" id="1HCA">
    <property type="method" value="X-ray"/>
    <property type="resolution" value="2.30 A"/>
    <property type="chains" value="A=1-260"/>
</dbReference>
<dbReference type="PDB" id="1HEA">
    <property type="method" value="X-ray"/>
    <property type="resolution" value="2.00 A"/>
    <property type="chains" value="A=1-260"/>
</dbReference>
<dbReference type="PDB" id="1HEB">
    <property type="method" value="X-ray"/>
    <property type="resolution" value="2.00 A"/>
    <property type="chains" value="A=1-260"/>
</dbReference>
<dbReference type="PDB" id="1HEC">
    <property type="method" value="X-ray"/>
    <property type="resolution" value="2.00 A"/>
    <property type="chains" value="A=1-260"/>
</dbReference>
<dbReference type="PDB" id="1HED">
    <property type="method" value="X-ray"/>
    <property type="resolution" value="2.00 A"/>
    <property type="chains" value="A=1-260"/>
</dbReference>
<dbReference type="PDB" id="1HVA">
    <property type="method" value="X-ray"/>
    <property type="resolution" value="2.30 A"/>
    <property type="chains" value="A=1-260"/>
</dbReference>
<dbReference type="PDB" id="1I8Z">
    <property type="method" value="X-ray"/>
    <property type="resolution" value="1.93 A"/>
    <property type="chains" value="A=2-260"/>
</dbReference>
<dbReference type="PDB" id="1I90">
    <property type="method" value="X-ray"/>
    <property type="resolution" value="2.00 A"/>
    <property type="chains" value="A=2-260"/>
</dbReference>
<dbReference type="PDB" id="1I91">
    <property type="method" value="X-ray"/>
    <property type="resolution" value="2.00 A"/>
    <property type="chains" value="A=2-260"/>
</dbReference>
<dbReference type="PDB" id="1I9L">
    <property type="method" value="X-ray"/>
    <property type="resolution" value="1.93 A"/>
    <property type="chains" value="A=2-260"/>
</dbReference>
<dbReference type="PDB" id="1I9M">
    <property type="method" value="X-ray"/>
    <property type="resolution" value="1.84 A"/>
    <property type="chains" value="A=2-260"/>
</dbReference>
<dbReference type="PDB" id="1I9N">
    <property type="method" value="X-ray"/>
    <property type="resolution" value="1.86 A"/>
    <property type="chains" value="A=2-260"/>
</dbReference>
<dbReference type="PDB" id="1I9O">
    <property type="method" value="X-ray"/>
    <property type="resolution" value="1.86 A"/>
    <property type="chains" value="A=2-260"/>
</dbReference>
<dbReference type="PDB" id="1I9P">
    <property type="method" value="X-ray"/>
    <property type="resolution" value="1.92 A"/>
    <property type="chains" value="A=2-260"/>
</dbReference>
<dbReference type="PDB" id="1I9Q">
    <property type="method" value="X-ray"/>
    <property type="resolution" value="1.80 A"/>
    <property type="chains" value="A=2-260"/>
</dbReference>
<dbReference type="PDB" id="1IF4">
    <property type="method" value="X-ray"/>
    <property type="resolution" value="1.93 A"/>
    <property type="chains" value="A=2-260"/>
</dbReference>
<dbReference type="PDB" id="1IF5">
    <property type="method" value="X-ray"/>
    <property type="resolution" value="2.00 A"/>
    <property type="chains" value="A=2-260"/>
</dbReference>
<dbReference type="PDB" id="1IF6">
    <property type="method" value="X-ray"/>
    <property type="resolution" value="2.09 A"/>
    <property type="chains" value="A=2-259"/>
</dbReference>
<dbReference type="PDB" id="1IF7">
    <property type="method" value="X-ray"/>
    <property type="resolution" value="1.98 A"/>
    <property type="chains" value="A=2-260"/>
</dbReference>
<dbReference type="PDB" id="1IF8">
    <property type="method" value="X-ray"/>
    <property type="resolution" value="1.94 A"/>
    <property type="chains" value="A=2-260"/>
</dbReference>
<dbReference type="PDB" id="1IF9">
    <property type="method" value="X-ray"/>
    <property type="resolution" value="2.00 A"/>
    <property type="chains" value="A=2-260"/>
</dbReference>
<dbReference type="PDB" id="1KWQ">
    <property type="method" value="X-ray"/>
    <property type="resolution" value="2.60 A"/>
    <property type="chains" value="A=1-260"/>
</dbReference>
<dbReference type="PDB" id="1KWR">
    <property type="method" value="X-ray"/>
    <property type="resolution" value="2.25 A"/>
    <property type="chains" value="A=1-260"/>
</dbReference>
<dbReference type="PDB" id="1LG5">
    <property type="method" value="X-ray"/>
    <property type="resolution" value="1.75 A"/>
    <property type="chains" value="A=1-260"/>
</dbReference>
<dbReference type="PDB" id="1LG6">
    <property type="method" value="X-ray"/>
    <property type="resolution" value="2.20 A"/>
    <property type="chains" value="A=1-260"/>
</dbReference>
<dbReference type="PDB" id="1LGD">
    <property type="method" value="X-ray"/>
    <property type="resolution" value="1.90 A"/>
    <property type="chains" value="A=1-260"/>
</dbReference>
<dbReference type="PDB" id="1LUG">
    <property type="method" value="X-ray"/>
    <property type="resolution" value="0.95 A"/>
    <property type="chains" value="A=2-260"/>
</dbReference>
<dbReference type="PDB" id="1LZV">
    <property type="method" value="X-ray"/>
    <property type="resolution" value="2.30 A"/>
    <property type="chains" value="A=1-260"/>
</dbReference>
<dbReference type="PDB" id="1MOO">
    <property type="method" value="X-ray"/>
    <property type="resolution" value="1.05 A"/>
    <property type="chains" value="A=1-260"/>
</dbReference>
<dbReference type="PDB" id="1MUA">
    <property type="method" value="X-ray"/>
    <property type="resolution" value="1.70 A"/>
    <property type="chains" value="A=4-259"/>
</dbReference>
<dbReference type="PDB" id="1OKL">
    <property type="method" value="X-ray"/>
    <property type="resolution" value="2.10 A"/>
    <property type="chains" value="A=2-260"/>
</dbReference>
<dbReference type="PDB" id="1OKM">
    <property type="method" value="X-ray"/>
    <property type="resolution" value="2.20 A"/>
    <property type="chains" value="A=2-260"/>
</dbReference>
<dbReference type="PDB" id="1OKN">
    <property type="method" value="X-ray"/>
    <property type="resolution" value="2.40 A"/>
    <property type="chains" value="A=2-260"/>
</dbReference>
<dbReference type="PDB" id="1OQ5">
    <property type="method" value="X-ray"/>
    <property type="resolution" value="1.50 A"/>
    <property type="chains" value="A=2-259"/>
</dbReference>
<dbReference type="PDB" id="1RAY">
    <property type="method" value="X-ray"/>
    <property type="resolution" value="1.80 A"/>
    <property type="chains" value="A=2-260"/>
</dbReference>
<dbReference type="PDB" id="1RAZ">
    <property type="method" value="X-ray"/>
    <property type="resolution" value="1.90 A"/>
    <property type="chains" value="A=2-260"/>
</dbReference>
<dbReference type="PDB" id="1RZA">
    <property type="method" value="X-ray"/>
    <property type="resolution" value="1.90 A"/>
    <property type="chains" value="A=2-260"/>
</dbReference>
<dbReference type="PDB" id="1RZB">
    <property type="method" value="X-ray"/>
    <property type="resolution" value="1.80 A"/>
    <property type="chains" value="A=2-260"/>
</dbReference>
<dbReference type="PDB" id="1RZC">
    <property type="method" value="X-ray"/>
    <property type="resolution" value="1.90 A"/>
    <property type="chains" value="A=2-260"/>
</dbReference>
<dbReference type="PDB" id="1RZD">
    <property type="method" value="X-ray"/>
    <property type="resolution" value="1.90 A"/>
    <property type="chains" value="A=2-260"/>
</dbReference>
<dbReference type="PDB" id="1RZE">
    <property type="method" value="X-ray"/>
    <property type="resolution" value="1.90 A"/>
    <property type="chains" value="A=2-260"/>
</dbReference>
<dbReference type="PDB" id="1T9N">
    <property type="method" value="X-ray"/>
    <property type="resolution" value="2.00 A"/>
    <property type="chains" value="A=1-259"/>
</dbReference>
<dbReference type="PDB" id="1TB0">
    <property type="method" value="X-ray"/>
    <property type="resolution" value="2.00 A"/>
    <property type="chains" value="X=1-259"/>
</dbReference>
<dbReference type="PDB" id="1TBT">
    <property type="method" value="X-ray"/>
    <property type="resolution" value="2.00 A"/>
    <property type="chains" value="X=1-259"/>
</dbReference>
<dbReference type="PDB" id="1TE3">
    <property type="method" value="X-ray"/>
    <property type="resolution" value="2.00 A"/>
    <property type="chains" value="X=1-260"/>
</dbReference>
<dbReference type="PDB" id="1TEQ">
    <property type="method" value="X-ray"/>
    <property type="resolution" value="2.00 A"/>
    <property type="chains" value="X=1-260"/>
</dbReference>
<dbReference type="PDB" id="1TEU">
    <property type="method" value="X-ray"/>
    <property type="resolution" value="2.00 A"/>
    <property type="chains" value="X=1-260"/>
</dbReference>
<dbReference type="PDB" id="1TG3">
    <property type="method" value="X-ray"/>
    <property type="resolution" value="1.80 A"/>
    <property type="chains" value="A=1-260"/>
</dbReference>
<dbReference type="PDB" id="1TG9">
    <property type="method" value="X-ray"/>
    <property type="resolution" value="1.90 A"/>
    <property type="chains" value="A=1-260"/>
</dbReference>
<dbReference type="PDB" id="1TH9">
    <property type="method" value="X-ray"/>
    <property type="resolution" value="1.63 A"/>
    <property type="chains" value="A=1-260"/>
</dbReference>
<dbReference type="PDB" id="1THK">
    <property type="method" value="X-ray"/>
    <property type="resolution" value="1.80 A"/>
    <property type="chains" value="A=1-260"/>
</dbReference>
<dbReference type="PDB" id="1TTM">
    <property type="method" value="X-ray"/>
    <property type="resolution" value="1.95 A"/>
    <property type="chains" value="A=2-259"/>
</dbReference>
<dbReference type="PDB" id="1UGA">
    <property type="method" value="X-ray"/>
    <property type="resolution" value="2.00 A"/>
    <property type="chains" value="A=3-260"/>
</dbReference>
<dbReference type="PDB" id="1UGB">
    <property type="method" value="X-ray"/>
    <property type="resolution" value="2.00 A"/>
    <property type="chains" value="A=3-260"/>
</dbReference>
<dbReference type="PDB" id="1UGC">
    <property type="method" value="X-ray"/>
    <property type="resolution" value="2.00 A"/>
    <property type="chains" value="A=3-260"/>
</dbReference>
<dbReference type="PDB" id="1UGD">
    <property type="method" value="X-ray"/>
    <property type="resolution" value="2.00 A"/>
    <property type="chains" value="A=3-260"/>
</dbReference>
<dbReference type="PDB" id="1UGE">
    <property type="method" value="X-ray"/>
    <property type="resolution" value="1.90 A"/>
    <property type="chains" value="A=3-260"/>
</dbReference>
<dbReference type="PDB" id="1UGF">
    <property type="method" value="X-ray"/>
    <property type="resolution" value="2.00 A"/>
    <property type="chains" value="A=3-260"/>
</dbReference>
<dbReference type="PDB" id="1UGG">
    <property type="method" value="X-ray"/>
    <property type="resolution" value="2.20 A"/>
    <property type="chains" value="A=3-260"/>
</dbReference>
<dbReference type="PDB" id="1XEG">
    <property type="method" value="X-ray"/>
    <property type="resolution" value="1.81 A"/>
    <property type="chains" value="A=1-260"/>
</dbReference>
<dbReference type="PDB" id="1XEV">
    <property type="method" value="X-ray"/>
    <property type="resolution" value="2.20 A"/>
    <property type="chains" value="A/B/C/D=1-260"/>
</dbReference>
<dbReference type="PDB" id="1XPZ">
    <property type="method" value="X-ray"/>
    <property type="resolution" value="2.02 A"/>
    <property type="chains" value="A=3-260"/>
</dbReference>
<dbReference type="PDB" id="1XQ0">
    <property type="method" value="X-ray"/>
    <property type="resolution" value="1.76 A"/>
    <property type="chains" value="A=2-260"/>
</dbReference>
<dbReference type="PDB" id="1YDA">
    <property type="method" value="X-ray"/>
    <property type="resolution" value="2.10 A"/>
    <property type="chains" value="A=2-260"/>
</dbReference>
<dbReference type="PDB" id="1YDB">
    <property type="method" value="X-ray"/>
    <property type="resolution" value="1.90 A"/>
    <property type="chains" value="A=2-260"/>
</dbReference>
<dbReference type="PDB" id="1YDC">
    <property type="method" value="X-ray"/>
    <property type="resolution" value="1.95 A"/>
    <property type="chains" value="A=2-260"/>
</dbReference>
<dbReference type="PDB" id="1YDD">
    <property type="method" value="X-ray"/>
    <property type="resolution" value="2.10 A"/>
    <property type="chains" value="A=2-260"/>
</dbReference>
<dbReference type="PDB" id="1YO0">
    <property type="method" value="X-ray"/>
    <property type="resolution" value="1.80 A"/>
    <property type="chains" value="A=1-260"/>
</dbReference>
<dbReference type="PDB" id="1YO1">
    <property type="method" value="X-ray"/>
    <property type="resolution" value="1.70 A"/>
    <property type="chains" value="A=1-260"/>
</dbReference>
<dbReference type="PDB" id="1YO2">
    <property type="method" value="X-ray"/>
    <property type="resolution" value="1.80 A"/>
    <property type="chains" value="A=1-259"/>
</dbReference>
<dbReference type="PDB" id="1Z9Y">
    <property type="method" value="X-ray"/>
    <property type="resolution" value="1.66 A"/>
    <property type="chains" value="A=2-259"/>
</dbReference>
<dbReference type="PDB" id="1ZE8">
    <property type="method" value="X-ray"/>
    <property type="resolution" value="2.00 A"/>
    <property type="chains" value="A=2-260"/>
</dbReference>
<dbReference type="PDB" id="1ZFK">
    <property type="method" value="X-ray"/>
    <property type="resolution" value="1.56 A"/>
    <property type="chains" value="A=2-259"/>
</dbReference>
<dbReference type="PDB" id="1ZFQ">
    <property type="method" value="X-ray"/>
    <property type="resolution" value="1.55 A"/>
    <property type="chains" value="A=2-259"/>
</dbReference>
<dbReference type="PDB" id="1ZGE">
    <property type="method" value="X-ray"/>
    <property type="resolution" value="1.65 A"/>
    <property type="chains" value="A=2-259"/>
</dbReference>
<dbReference type="PDB" id="1ZGF">
    <property type="method" value="X-ray"/>
    <property type="resolution" value="1.75 A"/>
    <property type="chains" value="A=2-259"/>
</dbReference>
<dbReference type="PDB" id="1ZH9">
    <property type="method" value="X-ray"/>
    <property type="resolution" value="1.70 A"/>
    <property type="chains" value="A=2-259"/>
</dbReference>
<dbReference type="PDB" id="1ZSA">
    <property type="method" value="X-ray"/>
    <property type="resolution" value="2.50 A"/>
    <property type="chains" value="A=2-260"/>
</dbReference>
<dbReference type="PDB" id="1ZSB">
    <property type="method" value="X-ray"/>
    <property type="resolution" value="2.00 A"/>
    <property type="chains" value="A=2-260"/>
</dbReference>
<dbReference type="PDB" id="1ZSC">
    <property type="method" value="X-ray"/>
    <property type="resolution" value="1.80 A"/>
    <property type="chains" value="A=2-260"/>
</dbReference>
<dbReference type="PDB" id="2ABE">
    <property type="method" value="X-ray"/>
    <property type="resolution" value="2.00 A"/>
    <property type="chains" value="A=2-259"/>
</dbReference>
<dbReference type="PDB" id="2AW1">
    <property type="method" value="X-ray"/>
    <property type="resolution" value="1.46 A"/>
    <property type="chains" value="A=2-260"/>
</dbReference>
<dbReference type="PDB" id="2AX2">
    <property type="method" value="X-ray"/>
    <property type="resolution" value="1.50 A"/>
    <property type="chains" value="A=1-259"/>
</dbReference>
<dbReference type="PDB" id="2CA2">
    <property type="method" value="X-ray"/>
    <property type="resolution" value="1.90 A"/>
    <property type="chains" value="A=2-260"/>
</dbReference>
<dbReference type="PDB" id="2CBA">
    <property type="method" value="X-ray"/>
    <property type="resolution" value="1.54 A"/>
    <property type="chains" value="A=2-260"/>
</dbReference>
<dbReference type="PDB" id="2CBB">
    <property type="method" value="X-ray"/>
    <property type="resolution" value="1.67 A"/>
    <property type="chains" value="A=2-260"/>
</dbReference>
<dbReference type="PDB" id="2CBC">
    <property type="method" value="X-ray"/>
    <property type="resolution" value="1.88 A"/>
    <property type="chains" value="A=2-260"/>
</dbReference>
<dbReference type="PDB" id="2CBD">
    <property type="method" value="X-ray"/>
    <property type="resolution" value="1.67 A"/>
    <property type="chains" value="A=2-260"/>
</dbReference>
<dbReference type="PDB" id="2CBE">
    <property type="method" value="X-ray"/>
    <property type="resolution" value="1.82 A"/>
    <property type="chains" value="A=2-260"/>
</dbReference>
<dbReference type="PDB" id="2EU2">
    <property type="method" value="X-ray"/>
    <property type="resolution" value="1.15 A"/>
    <property type="chains" value="A=1-260"/>
</dbReference>
<dbReference type="PDB" id="2EU3">
    <property type="method" value="X-ray"/>
    <property type="resolution" value="1.60 A"/>
    <property type="chains" value="A=1-260"/>
</dbReference>
<dbReference type="PDB" id="2EZ7">
    <property type="method" value="X-ray"/>
    <property type="resolution" value="2.00 A"/>
    <property type="chains" value="A=1-259"/>
</dbReference>
<dbReference type="PDB" id="2F14">
    <property type="method" value="X-ray"/>
    <property type="resolution" value="1.71 A"/>
    <property type="chains" value="A=2-259"/>
</dbReference>
<dbReference type="PDB" id="2FMG">
    <property type="method" value="X-ray"/>
    <property type="resolution" value="1.60 A"/>
    <property type="chains" value="A=1-259"/>
</dbReference>
<dbReference type="PDB" id="2FMZ">
    <property type="method" value="X-ray"/>
    <property type="resolution" value="1.60 A"/>
    <property type="chains" value="A=1-259"/>
</dbReference>
<dbReference type="PDB" id="2FNK">
    <property type="method" value="X-ray"/>
    <property type="resolution" value="1.80 A"/>
    <property type="chains" value="A=1-260"/>
</dbReference>
<dbReference type="PDB" id="2FNM">
    <property type="method" value="X-ray"/>
    <property type="resolution" value="1.80 A"/>
    <property type="chains" value="A=1-260"/>
</dbReference>
<dbReference type="PDB" id="2FNN">
    <property type="method" value="X-ray"/>
    <property type="resolution" value="1.80 A"/>
    <property type="chains" value="A=1-260"/>
</dbReference>
<dbReference type="PDB" id="2FOQ">
    <property type="method" value="X-ray"/>
    <property type="resolution" value="1.25 A"/>
    <property type="chains" value="A=1-259"/>
</dbReference>
<dbReference type="PDB" id="2FOS">
    <property type="method" value="X-ray"/>
    <property type="resolution" value="1.10 A"/>
    <property type="chains" value="A=1-259"/>
</dbReference>
<dbReference type="PDB" id="2FOU">
    <property type="method" value="X-ray"/>
    <property type="resolution" value="0.99 A"/>
    <property type="chains" value="A=1-259"/>
</dbReference>
<dbReference type="PDB" id="2FOV">
    <property type="method" value="X-ray"/>
    <property type="resolution" value="1.15 A"/>
    <property type="chains" value="A=1-259"/>
</dbReference>
<dbReference type="PDB" id="2GD8">
    <property type="method" value="X-ray"/>
    <property type="resolution" value="1.46 A"/>
    <property type="chains" value="A=2-259"/>
</dbReference>
<dbReference type="PDB" id="2GEH">
    <property type="method" value="X-ray"/>
    <property type="resolution" value="2.00 A"/>
    <property type="chains" value="A=1-259"/>
</dbReference>
<dbReference type="PDB" id="2H15">
    <property type="method" value="X-ray"/>
    <property type="resolution" value="1.90 A"/>
    <property type="chains" value="A=1-259"/>
</dbReference>
<dbReference type="PDB" id="2H4N">
    <property type="method" value="X-ray"/>
    <property type="resolution" value="1.90 A"/>
    <property type="chains" value="A=2-260"/>
</dbReference>
<dbReference type="PDB" id="2HD6">
    <property type="method" value="X-ray"/>
    <property type="resolution" value="1.80 A"/>
    <property type="chains" value="A=2-259"/>
</dbReference>
<dbReference type="PDB" id="2HKK">
    <property type="method" value="X-ray"/>
    <property type="resolution" value="1.90 A"/>
    <property type="chains" value="A=1-260"/>
</dbReference>
<dbReference type="PDB" id="2HL4">
    <property type="method" value="X-ray"/>
    <property type="resolution" value="1.55 A"/>
    <property type="chains" value="A=2-260"/>
</dbReference>
<dbReference type="PDB" id="2HNC">
    <property type="method" value="X-ray"/>
    <property type="resolution" value="1.55 A"/>
    <property type="chains" value="A=2-259"/>
</dbReference>
<dbReference type="PDB" id="2HOC">
    <property type="method" value="X-ray"/>
    <property type="resolution" value="2.10 A"/>
    <property type="chains" value="A=2-259"/>
</dbReference>
<dbReference type="PDB" id="2ILI">
    <property type="method" value="X-ray"/>
    <property type="resolution" value="1.05 A"/>
    <property type="chains" value="A=2-259"/>
</dbReference>
<dbReference type="PDB" id="2NNG">
    <property type="method" value="X-ray"/>
    <property type="resolution" value="1.20 A"/>
    <property type="chains" value="A=2-260"/>
</dbReference>
<dbReference type="PDB" id="2NNO">
    <property type="method" value="X-ray"/>
    <property type="resolution" value="1.01 A"/>
    <property type="chains" value="A=2-260"/>
</dbReference>
<dbReference type="PDB" id="2NNS">
    <property type="method" value="X-ray"/>
    <property type="resolution" value="1.03 A"/>
    <property type="chains" value="A=2-260"/>
</dbReference>
<dbReference type="PDB" id="2NNV">
    <property type="method" value="X-ray"/>
    <property type="resolution" value="1.10 A"/>
    <property type="chains" value="A=2-260"/>
</dbReference>
<dbReference type="PDB" id="2NWO">
    <property type="method" value="X-ray"/>
    <property type="resolution" value="1.70 A"/>
    <property type="chains" value="A=1-259"/>
</dbReference>
<dbReference type="PDB" id="2NWP">
    <property type="method" value="X-ray"/>
    <property type="resolution" value="1.80 A"/>
    <property type="chains" value="A=1-259"/>
</dbReference>
<dbReference type="PDB" id="2NWY">
    <property type="method" value="X-ray"/>
    <property type="resolution" value="1.65 A"/>
    <property type="chains" value="A=1-259"/>
</dbReference>
<dbReference type="PDB" id="2NWZ">
    <property type="method" value="X-ray"/>
    <property type="resolution" value="1.80 A"/>
    <property type="chains" value="A=1-259"/>
</dbReference>
<dbReference type="PDB" id="2NXR">
    <property type="method" value="X-ray"/>
    <property type="resolution" value="1.70 A"/>
    <property type="chains" value="A=1-259"/>
</dbReference>
<dbReference type="PDB" id="2NXS">
    <property type="method" value="X-ray"/>
    <property type="resolution" value="1.80 A"/>
    <property type="chains" value="A=1-259"/>
</dbReference>
<dbReference type="PDB" id="2NXT">
    <property type="method" value="X-ray"/>
    <property type="resolution" value="1.15 A"/>
    <property type="chains" value="A=1-260"/>
</dbReference>
<dbReference type="PDB" id="2O4Z">
    <property type="method" value="X-ray"/>
    <property type="resolution" value="2.10 A"/>
    <property type="chains" value="A=1-260"/>
</dbReference>
<dbReference type="PDB" id="2OSF">
    <property type="method" value="X-ray"/>
    <property type="resolution" value="1.60 A"/>
    <property type="chains" value="A=2-260"/>
</dbReference>
<dbReference type="PDB" id="2OSM">
    <property type="method" value="X-ray"/>
    <property type="resolution" value="1.60 A"/>
    <property type="chains" value="A=2-260"/>
</dbReference>
<dbReference type="PDB" id="2POU">
    <property type="method" value="X-ray"/>
    <property type="resolution" value="1.60 A"/>
    <property type="chains" value="A=1-259"/>
</dbReference>
<dbReference type="PDB" id="2POV">
    <property type="method" value="X-ray"/>
    <property type="resolution" value="1.60 A"/>
    <property type="chains" value="A=1-258"/>
</dbReference>
<dbReference type="PDB" id="2POW">
    <property type="method" value="X-ray"/>
    <property type="resolution" value="1.75 A"/>
    <property type="chains" value="A=1-259"/>
</dbReference>
<dbReference type="PDB" id="2Q1B">
    <property type="method" value="X-ray"/>
    <property type="resolution" value="1.70 A"/>
    <property type="chains" value="A=1-260"/>
</dbReference>
<dbReference type="PDB" id="2Q1Q">
    <property type="method" value="X-ray"/>
    <property type="resolution" value="1.90 A"/>
    <property type="chains" value="A=1-260"/>
</dbReference>
<dbReference type="PDB" id="2Q38">
    <property type="method" value="X-ray"/>
    <property type="resolution" value="1.95 A"/>
    <property type="chains" value="A=1-260"/>
</dbReference>
<dbReference type="PDB" id="2QO8">
    <property type="method" value="X-ray"/>
    <property type="resolution" value="1.40 A"/>
    <property type="chains" value="A=2-260"/>
</dbReference>
<dbReference type="PDB" id="2QOA">
    <property type="method" value="X-ray"/>
    <property type="resolution" value="1.60 A"/>
    <property type="chains" value="A=2-260"/>
</dbReference>
<dbReference type="PDB" id="2QP6">
    <property type="method" value="X-ray"/>
    <property type="resolution" value="1.45 A"/>
    <property type="chains" value="A=2-260"/>
</dbReference>
<dbReference type="PDB" id="2VVA">
    <property type="method" value="X-ray"/>
    <property type="resolution" value="1.56 A"/>
    <property type="chains" value="X=1-260"/>
</dbReference>
<dbReference type="PDB" id="2VVB">
    <property type="method" value="X-ray"/>
    <property type="resolution" value="1.66 A"/>
    <property type="chains" value="X=1-260"/>
</dbReference>
<dbReference type="PDB" id="2WD2">
    <property type="method" value="X-ray"/>
    <property type="resolution" value="1.49 A"/>
    <property type="chains" value="A=2-259"/>
</dbReference>
<dbReference type="PDB" id="2WD3">
    <property type="method" value="X-ray"/>
    <property type="resolution" value="1.80 A"/>
    <property type="chains" value="A=2-260"/>
</dbReference>
<dbReference type="PDB" id="2WEG">
    <property type="method" value="X-ray"/>
    <property type="resolution" value="1.10 A"/>
    <property type="chains" value="A=2-260"/>
</dbReference>
<dbReference type="PDB" id="2WEH">
    <property type="method" value="X-ray"/>
    <property type="resolution" value="2.09 A"/>
    <property type="chains" value="A=2-260"/>
</dbReference>
<dbReference type="PDB" id="2WEJ">
    <property type="method" value="X-ray"/>
    <property type="resolution" value="1.45 A"/>
    <property type="chains" value="A=2-260"/>
</dbReference>
<dbReference type="PDB" id="2WEO">
    <property type="method" value="X-ray"/>
    <property type="resolution" value="1.40 A"/>
    <property type="chains" value="A=2-260"/>
</dbReference>
<dbReference type="PDB" id="2X7S">
    <property type="method" value="X-ray"/>
    <property type="resolution" value="1.64 A"/>
    <property type="chains" value="A=2-260"/>
</dbReference>
<dbReference type="PDB" id="2X7T">
    <property type="method" value="X-ray"/>
    <property type="resolution" value="1.89 A"/>
    <property type="chains" value="A=2-260"/>
</dbReference>
<dbReference type="PDB" id="2X7U">
    <property type="method" value="X-ray"/>
    <property type="resolution" value="2.12 A"/>
    <property type="chains" value="A=2-260"/>
</dbReference>
<dbReference type="PDB" id="3B4F">
    <property type="method" value="X-ray"/>
    <property type="resolution" value="1.89 A"/>
    <property type="chains" value="A=1-260"/>
</dbReference>
<dbReference type="PDB" id="3BET">
    <property type="method" value="X-ray"/>
    <property type="resolution" value="1.85 A"/>
    <property type="chains" value="A=2-260"/>
</dbReference>
<dbReference type="PDB" id="3BL0">
    <property type="method" value="X-ray"/>
    <property type="resolution" value="1.90 A"/>
    <property type="chains" value="A=1-260"/>
</dbReference>
<dbReference type="PDB" id="3BL1">
    <property type="method" value="X-ray"/>
    <property type="resolution" value="2.10 A"/>
    <property type="chains" value="A=1-260"/>
</dbReference>
<dbReference type="PDB" id="3C7P">
    <property type="method" value="X-ray"/>
    <property type="resolution" value="1.70 A"/>
    <property type="chains" value="A=1-260"/>
</dbReference>
<dbReference type="PDB" id="3CA2">
    <property type="method" value="X-ray"/>
    <property type="resolution" value="2.00 A"/>
    <property type="chains" value="A=2-260"/>
</dbReference>
<dbReference type="PDB" id="3CAJ">
    <property type="method" value="X-ray"/>
    <property type="resolution" value="1.80 A"/>
    <property type="chains" value="A=1-260"/>
</dbReference>
<dbReference type="PDB" id="3CYU">
    <property type="method" value="X-ray"/>
    <property type="resolution" value="1.70 A"/>
    <property type="chains" value="A=1-260"/>
</dbReference>
<dbReference type="PDB" id="3D8W">
    <property type="method" value="X-ray"/>
    <property type="resolution" value="1.70 A"/>
    <property type="chains" value="A=1-260"/>
</dbReference>
<dbReference type="PDB" id="3D92">
    <property type="method" value="X-ray"/>
    <property type="resolution" value="1.10 A"/>
    <property type="chains" value="A=1-260"/>
</dbReference>
<dbReference type="PDB" id="3D93">
    <property type="method" value="X-ray"/>
    <property type="resolution" value="1.10 A"/>
    <property type="chains" value="A=1-260"/>
</dbReference>
<dbReference type="PDB" id="3D9Z">
    <property type="method" value="X-ray"/>
    <property type="resolution" value="1.65 A"/>
    <property type="chains" value="A=1-260"/>
</dbReference>
<dbReference type="PDB" id="3DAZ">
    <property type="method" value="X-ray"/>
    <property type="resolution" value="1.60 A"/>
    <property type="chains" value="A=1-260"/>
</dbReference>
<dbReference type="PDB" id="3DBU">
    <property type="method" value="X-ray"/>
    <property type="resolution" value="1.70 A"/>
    <property type="chains" value="A=1-260"/>
</dbReference>
<dbReference type="PDB" id="3DC3">
    <property type="method" value="X-ray"/>
    <property type="resolution" value="1.70 A"/>
    <property type="chains" value="A=1-260"/>
</dbReference>
<dbReference type="PDB" id="3DC9">
    <property type="method" value="X-ray"/>
    <property type="resolution" value="1.60 A"/>
    <property type="chains" value="A=1-260"/>
</dbReference>
<dbReference type="PDB" id="3DCC">
    <property type="method" value="X-ray"/>
    <property type="resolution" value="1.60 A"/>
    <property type="chains" value="A=1-260"/>
</dbReference>
<dbReference type="PDB" id="3DCS">
    <property type="method" value="X-ray"/>
    <property type="resolution" value="1.80 A"/>
    <property type="chains" value="A=1-260"/>
</dbReference>
<dbReference type="PDB" id="3DCW">
    <property type="method" value="X-ray"/>
    <property type="resolution" value="1.50 A"/>
    <property type="chains" value="A=1-260"/>
</dbReference>
<dbReference type="PDB" id="3DD0">
    <property type="method" value="X-ray"/>
    <property type="resolution" value="1.48 A"/>
    <property type="chains" value="A=1-260"/>
</dbReference>
<dbReference type="PDB" id="3DD8">
    <property type="method" value="X-ray"/>
    <property type="resolution" value="1.90 A"/>
    <property type="chains" value="A=1-260"/>
</dbReference>
<dbReference type="PDB" id="3DV7">
    <property type="method" value="X-ray"/>
    <property type="resolution" value="1.70 A"/>
    <property type="chains" value="A=2-260"/>
</dbReference>
<dbReference type="PDB" id="3DVB">
    <property type="method" value="X-ray"/>
    <property type="resolution" value="1.70 A"/>
    <property type="chains" value="A=2-260"/>
</dbReference>
<dbReference type="PDB" id="3DVC">
    <property type="method" value="X-ray"/>
    <property type="resolution" value="1.60 A"/>
    <property type="chains" value="A=2-260"/>
</dbReference>
<dbReference type="PDB" id="3DVD">
    <property type="method" value="X-ray"/>
    <property type="resolution" value="1.60 A"/>
    <property type="chains" value="A=2-260"/>
</dbReference>
<dbReference type="PDB" id="3EFI">
    <property type="method" value="X-ray"/>
    <property type="resolution" value="1.75 A"/>
    <property type="chains" value="A=2-260"/>
</dbReference>
<dbReference type="PDB" id="3EFT">
    <property type="method" value="X-ray"/>
    <property type="resolution" value="1.85 A"/>
    <property type="chains" value="A=1-260"/>
</dbReference>
<dbReference type="PDB" id="3F4X">
    <property type="method" value="X-ray"/>
    <property type="resolution" value="1.90 A"/>
    <property type="chains" value="A=1-260"/>
</dbReference>
<dbReference type="PDB" id="3F8E">
    <property type="method" value="X-ray"/>
    <property type="resolution" value="2.00 A"/>
    <property type="chains" value="A=1-260"/>
</dbReference>
<dbReference type="PDB" id="3FFP">
    <property type="method" value="X-ray"/>
    <property type="resolution" value="1.81 A"/>
    <property type="chains" value="X=1-260"/>
</dbReference>
<dbReference type="PDB" id="3GZ0">
    <property type="method" value="X-ray"/>
    <property type="resolution" value="1.26 A"/>
    <property type="chains" value="A=2-260"/>
</dbReference>
<dbReference type="PDB" id="3HFP">
    <property type="method" value="X-ray"/>
    <property type="resolution" value="2.10 A"/>
    <property type="chains" value="A=1-260"/>
</dbReference>
<dbReference type="PDB" id="3HKN">
    <property type="method" value="X-ray"/>
    <property type="resolution" value="1.80 A"/>
    <property type="chains" value="A=1-260"/>
</dbReference>
<dbReference type="PDB" id="3HKQ">
    <property type="method" value="X-ray"/>
    <property type="resolution" value="1.70 A"/>
    <property type="chains" value="A=1-260"/>
</dbReference>
<dbReference type="PDB" id="3HKT">
    <property type="method" value="X-ray"/>
    <property type="resolution" value="2.36 A"/>
    <property type="chains" value="A=1-260"/>
</dbReference>
<dbReference type="PDB" id="3HKU">
    <property type="method" value="X-ray"/>
    <property type="resolution" value="1.80 A"/>
    <property type="chains" value="A=1-260"/>
</dbReference>
<dbReference type="PDB" id="3HLJ">
    <property type="method" value="X-ray"/>
    <property type="resolution" value="1.44 A"/>
    <property type="chains" value="A=1-260"/>
</dbReference>
<dbReference type="PDB" id="3HS4">
    <property type="method" value="X-ray"/>
    <property type="resolution" value="1.10 A"/>
    <property type="chains" value="A=1-260"/>
</dbReference>
<dbReference type="PDB" id="3IBI">
    <property type="method" value="X-ray"/>
    <property type="resolution" value="1.93 A"/>
    <property type="chains" value="A=2-260"/>
</dbReference>
<dbReference type="PDB" id="3IBL">
    <property type="method" value="X-ray"/>
    <property type="resolution" value="1.55 A"/>
    <property type="chains" value="A=2-260"/>
</dbReference>
<dbReference type="PDB" id="3IBN">
    <property type="method" value="X-ray"/>
    <property type="resolution" value="2.20 A"/>
    <property type="chains" value="A=2-260"/>
</dbReference>
<dbReference type="PDB" id="3IBU">
    <property type="method" value="X-ray"/>
    <property type="resolution" value="1.41 A"/>
    <property type="chains" value="A=2-260"/>
</dbReference>
<dbReference type="PDB" id="3IEO">
    <property type="method" value="X-ray"/>
    <property type="resolution" value="2.00 A"/>
    <property type="chains" value="A=1-260"/>
</dbReference>
<dbReference type="PDB" id="3IGP">
    <property type="method" value="X-ray"/>
    <property type="resolution" value="1.65 A"/>
    <property type="chains" value="A=1-260"/>
</dbReference>
<dbReference type="PDB" id="3K2F">
    <property type="method" value="X-ray"/>
    <property type="resolution" value="1.98 A"/>
    <property type="chains" value="A=1-260"/>
</dbReference>
<dbReference type="PDB" id="3K34">
    <property type="method" value="X-ray"/>
    <property type="resolution" value="0.90 A"/>
    <property type="chains" value="A=1-260"/>
</dbReference>
<dbReference type="PDB" id="3K7K">
    <property type="method" value="X-ray"/>
    <property type="resolution" value="1.90 A"/>
    <property type="chains" value="A=1-260"/>
</dbReference>
<dbReference type="PDB" id="3KIG">
    <property type="method" value="X-ray"/>
    <property type="resolution" value="1.39 A"/>
    <property type="chains" value="A=1-260"/>
</dbReference>
<dbReference type="PDB" id="3KKX">
    <property type="method" value="Neutron"/>
    <property type="resolution" value="2.00 A"/>
    <property type="chains" value="A=1-260"/>
</dbReference>
<dbReference type="PDB" id="3KNE">
    <property type="method" value="X-ray"/>
    <property type="resolution" value="1.35 A"/>
    <property type="chains" value="A=1-260"/>
</dbReference>
<dbReference type="PDB" id="3KOI">
    <property type="method" value="X-ray"/>
    <property type="resolution" value="1.64 A"/>
    <property type="chains" value="A=1-260"/>
</dbReference>
<dbReference type="PDB" id="3KOK">
    <property type="method" value="X-ray"/>
    <property type="resolution" value="1.50 A"/>
    <property type="chains" value="A=1-260"/>
</dbReference>
<dbReference type="PDB" id="3KON">
    <property type="method" value="X-ray"/>
    <property type="resolution" value="1.50 A"/>
    <property type="chains" value="A=1-260"/>
</dbReference>
<dbReference type="PDB" id="3KS3">
    <property type="method" value="X-ray"/>
    <property type="resolution" value="0.90 A"/>
    <property type="chains" value="A=1-260"/>
</dbReference>
<dbReference type="PDB" id="3KWA">
    <property type="method" value="X-ray"/>
    <property type="resolution" value="2.00 A"/>
    <property type="chains" value="A=1-260"/>
</dbReference>
<dbReference type="PDB" id="3L14">
    <property type="method" value="X-ray"/>
    <property type="resolution" value="1.22 A"/>
    <property type="chains" value="A=1-260"/>
</dbReference>
<dbReference type="PDB" id="3M04">
    <property type="method" value="X-ray"/>
    <property type="resolution" value="1.40 A"/>
    <property type="chains" value="A=1-260"/>
</dbReference>
<dbReference type="PDB" id="3M14">
    <property type="method" value="X-ray"/>
    <property type="resolution" value="1.38 A"/>
    <property type="chains" value="A=1-260"/>
</dbReference>
<dbReference type="PDB" id="3M1J">
    <property type="method" value="X-ray"/>
    <property type="resolution" value="1.80 A"/>
    <property type="chains" value="A=1-260"/>
</dbReference>
<dbReference type="PDB" id="3M1K">
    <property type="method" value="X-ray"/>
    <property type="resolution" value="1.35 A"/>
    <property type="chains" value="A=1-260"/>
</dbReference>
<dbReference type="PDB" id="3M1Q">
    <property type="method" value="X-ray"/>
    <property type="resolution" value="1.69 A"/>
    <property type="chains" value="A=1-260"/>
</dbReference>
<dbReference type="PDB" id="3M1W">
    <property type="method" value="X-ray"/>
    <property type="resolution" value="1.38 A"/>
    <property type="chains" value="A=1-260"/>
</dbReference>
<dbReference type="PDB" id="3M2N">
    <property type="method" value="X-ray"/>
    <property type="resolution" value="1.65 A"/>
    <property type="chains" value="A=1-260"/>
</dbReference>
<dbReference type="PDB" id="3M2X">
    <property type="method" value="X-ray"/>
    <property type="resolution" value="1.87 A"/>
    <property type="chains" value="A=1-260"/>
</dbReference>
<dbReference type="PDB" id="3M2Y">
    <property type="method" value="X-ray"/>
    <property type="resolution" value="1.17 A"/>
    <property type="chains" value="A=1-260"/>
</dbReference>
<dbReference type="PDB" id="3M2Z">
    <property type="method" value="X-ray"/>
    <property type="resolution" value="1.70 A"/>
    <property type="chains" value="A=1-260"/>
</dbReference>
<dbReference type="PDB" id="3M3X">
    <property type="method" value="X-ray"/>
    <property type="resolution" value="1.68 A"/>
    <property type="chains" value="A=1-260"/>
</dbReference>
<dbReference type="PDB" id="3M40">
    <property type="method" value="X-ray"/>
    <property type="resolution" value="1.60 A"/>
    <property type="chains" value="A=1-260"/>
</dbReference>
<dbReference type="PDB" id="3M5E">
    <property type="method" value="X-ray"/>
    <property type="resolution" value="1.70 A"/>
    <property type="chains" value="A=1-260"/>
</dbReference>
<dbReference type="PDB" id="3M5S">
    <property type="method" value="X-ray"/>
    <property type="resolution" value="1.40 A"/>
    <property type="chains" value="A=1-260"/>
</dbReference>
<dbReference type="PDB" id="3M5T">
    <property type="method" value="X-ray"/>
    <property type="resolution" value="1.95 A"/>
    <property type="chains" value="A=1-260"/>
</dbReference>
<dbReference type="PDB" id="3M67">
    <property type="method" value="X-ray"/>
    <property type="resolution" value="1.80 A"/>
    <property type="chains" value="A=1-260"/>
</dbReference>
<dbReference type="PDB" id="3M96">
    <property type="method" value="X-ray"/>
    <property type="resolution" value="1.40 A"/>
    <property type="chains" value="A=1-260"/>
</dbReference>
<dbReference type="PDB" id="3M98">
    <property type="method" value="X-ray"/>
    <property type="resolution" value="1.50 A"/>
    <property type="chains" value="A=1-260"/>
</dbReference>
<dbReference type="PDB" id="3MHC">
    <property type="method" value="X-ray"/>
    <property type="resolution" value="1.70 A"/>
    <property type="chains" value="A=1-260"/>
</dbReference>
<dbReference type="PDB" id="3MHI">
    <property type="method" value="X-ray"/>
    <property type="resolution" value="1.70 A"/>
    <property type="chains" value="A=1-260"/>
</dbReference>
<dbReference type="PDB" id="3MHL">
    <property type="method" value="X-ray"/>
    <property type="resolution" value="1.90 A"/>
    <property type="chains" value="A=1-260"/>
</dbReference>
<dbReference type="PDB" id="3MHM">
    <property type="method" value="X-ray"/>
    <property type="resolution" value="1.50 A"/>
    <property type="chains" value="A=1-260"/>
</dbReference>
<dbReference type="PDB" id="3MHO">
    <property type="method" value="X-ray"/>
    <property type="resolution" value="1.15 A"/>
    <property type="chains" value="A=1-260"/>
</dbReference>
<dbReference type="PDB" id="3ML2">
    <property type="method" value="X-ray"/>
    <property type="resolution" value="1.80 A"/>
    <property type="chains" value="A=1-260"/>
</dbReference>
<dbReference type="PDB" id="3MMF">
    <property type="method" value="X-ray"/>
    <property type="resolution" value="1.50 A"/>
    <property type="chains" value="A=1-260"/>
</dbReference>
<dbReference type="PDB" id="3MNA">
    <property type="method" value="X-ray"/>
    <property type="resolution" value="1.50 A"/>
    <property type="chains" value="A=1-260"/>
</dbReference>
<dbReference type="PDB" id="3MNH">
    <property type="method" value="X-ray"/>
    <property type="resolution" value="1.65 A"/>
    <property type="chains" value="A=1-260"/>
</dbReference>
<dbReference type="PDB" id="3MNI">
    <property type="method" value="X-ray"/>
    <property type="resolution" value="1.75 A"/>
    <property type="chains" value="A=1-260"/>
</dbReference>
<dbReference type="PDB" id="3MNJ">
    <property type="method" value="X-ray"/>
    <property type="resolution" value="1.75 A"/>
    <property type="chains" value="A=1-260"/>
</dbReference>
<dbReference type="PDB" id="3MNK">
    <property type="method" value="X-ray"/>
    <property type="resolution" value="1.75 A"/>
    <property type="chains" value="A=1-260"/>
</dbReference>
<dbReference type="PDB" id="3MNU">
    <property type="method" value="X-ray"/>
    <property type="resolution" value="1.80 A"/>
    <property type="chains" value="A=2-260"/>
</dbReference>
<dbReference type="PDB" id="3MWO">
    <property type="method" value="X-ray"/>
    <property type="resolution" value="1.40 A"/>
    <property type="chains" value="A/B=1-260"/>
</dbReference>
<dbReference type="PDB" id="3MYQ">
    <property type="method" value="X-ray"/>
    <property type="resolution" value="1.35 A"/>
    <property type="chains" value="A=1-260"/>
</dbReference>
<dbReference type="PDB" id="3MZC">
    <property type="method" value="X-ray"/>
    <property type="resolution" value="1.50 A"/>
    <property type="chains" value="A=1-260"/>
</dbReference>
<dbReference type="PDB" id="3N0N">
    <property type="method" value="X-ray"/>
    <property type="resolution" value="1.50 A"/>
    <property type="chains" value="A=1-260"/>
</dbReference>
<dbReference type="PDB" id="3N2P">
    <property type="method" value="X-ray"/>
    <property type="resolution" value="1.65 A"/>
    <property type="chains" value="A=1-260"/>
</dbReference>
<dbReference type="PDB" id="3N3J">
    <property type="method" value="X-ray"/>
    <property type="resolution" value="1.50 A"/>
    <property type="chains" value="A=1-260"/>
</dbReference>
<dbReference type="PDB" id="3N4B">
    <property type="method" value="X-ray"/>
    <property type="resolution" value="1.60 A"/>
    <property type="chains" value="A=1-260"/>
</dbReference>
<dbReference type="PDB" id="3NB5">
    <property type="method" value="X-ray"/>
    <property type="resolution" value="1.80 A"/>
    <property type="chains" value="A=1-260"/>
</dbReference>
<dbReference type="PDB" id="3NI5">
    <property type="method" value="X-ray"/>
    <property type="resolution" value="2.10 A"/>
    <property type="chains" value="A=1-260"/>
</dbReference>
<dbReference type="PDB" id="3NJ9">
    <property type="method" value="X-ray"/>
    <property type="resolution" value="2.00 A"/>
    <property type="chains" value="A=1-260"/>
</dbReference>
<dbReference type="PDB" id="3OIK">
    <property type="method" value="X-ray"/>
    <property type="resolution" value="1.50 A"/>
    <property type="chains" value="A=1-260"/>
</dbReference>
<dbReference type="PDB" id="3OIL">
    <property type="method" value="X-ray"/>
    <property type="resolution" value="1.50 A"/>
    <property type="chains" value="A=1-260"/>
</dbReference>
<dbReference type="PDB" id="3OIM">
    <property type="method" value="X-ray"/>
    <property type="resolution" value="1.45 A"/>
    <property type="chains" value="A=1-260"/>
</dbReference>
<dbReference type="PDB" id="3OKU">
    <property type="method" value="X-ray"/>
    <property type="resolution" value="1.45 A"/>
    <property type="chains" value="A=1-260"/>
</dbReference>
<dbReference type="PDB" id="3OKV">
    <property type="method" value="X-ray"/>
    <property type="resolution" value="1.45 A"/>
    <property type="chains" value="A=1-260"/>
</dbReference>
<dbReference type="PDB" id="3OY0">
    <property type="method" value="X-ray"/>
    <property type="resolution" value="1.60 A"/>
    <property type="chains" value="A=1-260"/>
</dbReference>
<dbReference type="PDB" id="3OYQ">
    <property type="method" value="X-ray"/>
    <property type="resolution" value="1.47 A"/>
    <property type="chains" value="A=1-260"/>
</dbReference>
<dbReference type="PDB" id="3OYS">
    <property type="method" value="X-ray"/>
    <property type="resolution" value="1.54 A"/>
    <property type="chains" value="A=1-260"/>
</dbReference>
<dbReference type="PDB" id="3P3H">
    <property type="method" value="X-ray"/>
    <property type="resolution" value="1.50 A"/>
    <property type="chains" value="A=1-260"/>
</dbReference>
<dbReference type="PDB" id="3P3J">
    <property type="method" value="X-ray"/>
    <property type="resolution" value="1.60 A"/>
    <property type="chains" value="A=1-260"/>
</dbReference>
<dbReference type="PDB" id="3P44">
    <property type="method" value="X-ray"/>
    <property type="resolution" value="2.20 A"/>
    <property type="chains" value="A=1-260"/>
</dbReference>
<dbReference type="PDB" id="3P4V">
    <property type="method" value="X-ray"/>
    <property type="resolution" value="2.00 A"/>
    <property type="chains" value="A=1-260"/>
</dbReference>
<dbReference type="PDB" id="3P55">
    <property type="method" value="X-ray"/>
    <property type="resolution" value="2.00 A"/>
    <property type="chains" value="A=1-260"/>
</dbReference>
<dbReference type="PDB" id="3P58">
    <property type="method" value="X-ray"/>
    <property type="resolution" value="1.49 A"/>
    <property type="chains" value="A=1-260"/>
</dbReference>
<dbReference type="PDB" id="3P5A">
    <property type="method" value="X-ray"/>
    <property type="resolution" value="1.49 A"/>
    <property type="chains" value="A=1-260"/>
</dbReference>
<dbReference type="PDB" id="3P5L">
    <property type="method" value="X-ray"/>
    <property type="resolution" value="1.50 A"/>
    <property type="chains" value="A=1-260"/>
</dbReference>
<dbReference type="PDB" id="3PJJ">
    <property type="method" value="X-ray"/>
    <property type="resolution" value="1.80 A"/>
    <property type="chains" value="A=2-260"/>
</dbReference>
<dbReference type="PDB" id="3PO6">
    <property type="method" value="X-ray"/>
    <property type="resolution" value="1.47 A"/>
    <property type="chains" value="A=2-260"/>
</dbReference>
<dbReference type="PDB" id="3PYK">
    <property type="method" value="X-ray"/>
    <property type="resolution" value="1.30 A"/>
    <property type="chains" value="A=1-260"/>
</dbReference>
<dbReference type="PDB" id="3QYK">
    <property type="method" value="X-ray"/>
    <property type="resolution" value="1.47 A"/>
    <property type="chains" value="A=1-260"/>
</dbReference>
<dbReference type="PDB" id="3R16">
    <property type="method" value="X-ray"/>
    <property type="resolution" value="1.60 A"/>
    <property type="chains" value="A=4-260"/>
</dbReference>
<dbReference type="PDB" id="3R17">
    <property type="method" value="X-ray"/>
    <property type="resolution" value="1.70 A"/>
    <property type="chains" value="B=4-260"/>
</dbReference>
<dbReference type="PDB" id="3RG3">
    <property type="method" value="X-ray"/>
    <property type="resolution" value="1.90 A"/>
    <property type="chains" value="A=1-260"/>
</dbReference>
<dbReference type="PDB" id="3RG4">
    <property type="method" value="X-ray"/>
    <property type="resolution" value="1.50 A"/>
    <property type="chains" value="A=1-260"/>
</dbReference>
<dbReference type="PDB" id="3RGE">
    <property type="method" value="X-ray"/>
    <property type="resolution" value="2.10 A"/>
    <property type="chains" value="A=1-260"/>
</dbReference>
<dbReference type="PDB" id="3RJ7">
    <property type="method" value="X-ray"/>
    <property type="resolution" value="1.20 A"/>
    <property type="chains" value="A=3-260"/>
</dbReference>
<dbReference type="PDB" id="3RLD">
    <property type="method" value="X-ray"/>
    <property type="resolution" value="1.50 A"/>
    <property type="chains" value="A=1-260"/>
</dbReference>
<dbReference type="PDB" id="3RYJ">
    <property type="method" value="X-ray"/>
    <property type="resolution" value="1.39 A"/>
    <property type="chains" value="B=2-260"/>
</dbReference>
<dbReference type="PDB" id="3RYV">
    <property type="method" value="X-ray"/>
    <property type="resolution" value="1.20 A"/>
    <property type="chains" value="B=2-260"/>
</dbReference>
<dbReference type="PDB" id="3RYX">
    <property type="method" value="X-ray"/>
    <property type="resolution" value="1.60 A"/>
    <property type="chains" value="B=2-260"/>
</dbReference>
<dbReference type="PDB" id="3RYY">
    <property type="method" value="X-ray"/>
    <property type="resolution" value="1.16 A"/>
    <property type="chains" value="A=2-260"/>
</dbReference>
<dbReference type="PDB" id="3RYZ">
    <property type="method" value="X-ray"/>
    <property type="resolution" value="1.37 A"/>
    <property type="chains" value="A=2-260"/>
</dbReference>
<dbReference type="PDB" id="3RZ0">
    <property type="method" value="X-ray"/>
    <property type="resolution" value="1.80 A"/>
    <property type="chains" value="B=2-260"/>
</dbReference>
<dbReference type="PDB" id="3RZ1">
    <property type="method" value="X-ray"/>
    <property type="resolution" value="1.51 A"/>
    <property type="chains" value="B=2-260"/>
</dbReference>
<dbReference type="PDB" id="3RZ5">
    <property type="method" value="X-ray"/>
    <property type="resolution" value="1.65 A"/>
    <property type="chains" value="A=2-260"/>
</dbReference>
<dbReference type="PDB" id="3RZ7">
    <property type="method" value="X-ray"/>
    <property type="resolution" value="1.80 A"/>
    <property type="chains" value="A=2-260"/>
</dbReference>
<dbReference type="PDB" id="3RZ8">
    <property type="method" value="X-ray"/>
    <property type="resolution" value="1.70 A"/>
    <property type="chains" value="A=2-260"/>
</dbReference>
<dbReference type="PDB" id="3S71">
    <property type="method" value="X-ray"/>
    <property type="resolution" value="1.25 A"/>
    <property type="chains" value="B=3-260"/>
</dbReference>
<dbReference type="PDB" id="3S72">
    <property type="method" value="X-ray"/>
    <property type="resolution" value="1.60 A"/>
    <property type="chains" value="B=3-260"/>
</dbReference>
<dbReference type="PDB" id="3S73">
    <property type="method" value="X-ray"/>
    <property type="resolution" value="1.75 A"/>
    <property type="chains" value="B=3-260"/>
</dbReference>
<dbReference type="PDB" id="3S74">
    <property type="method" value="X-ray"/>
    <property type="resolution" value="1.40 A"/>
    <property type="chains" value="B=3-260"/>
</dbReference>
<dbReference type="PDB" id="3S75">
    <property type="method" value="X-ray"/>
    <property type="resolution" value="1.50 A"/>
    <property type="chains" value="B=3-260"/>
</dbReference>
<dbReference type="PDB" id="3S76">
    <property type="method" value="X-ray"/>
    <property type="resolution" value="1.60 A"/>
    <property type="chains" value="A=3-260"/>
</dbReference>
<dbReference type="PDB" id="3S77">
    <property type="method" value="X-ray"/>
    <property type="resolution" value="1.86 A"/>
    <property type="chains" value="B=3-260"/>
</dbReference>
<dbReference type="PDB" id="3S78">
    <property type="method" value="X-ray"/>
    <property type="resolution" value="1.98 A"/>
    <property type="chains" value="B=3-260"/>
</dbReference>
<dbReference type="PDB" id="3S8X">
    <property type="method" value="X-ray"/>
    <property type="resolution" value="1.30 A"/>
    <property type="chains" value="A=1-260"/>
</dbReference>
<dbReference type="PDB" id="3S9T">
    <property type="method" value="X-ray"/>
    <property type="resolution" value="1.30 A"/>
    <property type="chains" value="A=1-260"/>
</dbReference>
<dbReference type="PDB" id="3SAP">
    <property type="method" value="X-ray"/>
    <property type="resolution" value="1.75 A"/>
    <property type="chains" value="A=1-260"/>
</dbReference>
<dbReference type="PDB" id="3SAX">
    <property type="method" value="X-ray"/>
    <property type="resolution" value="1.10 A"/>
    <property type="chains" value="A=1-260"/>
</dbReference>
<dbReference type="PDB" id="3SBH">
    <property type="method" value="X-ray"/>
    <property type="resolution" value="1.65 A"/>
    <property type="chains" value="A=1-260"/>
</dbReference>
<dbReference type="PDB" id="3SBI">
    <property type="method" value="X-ray"/>
    <property type="resolution" value="1.40 A"/>
    <property type="chains" value="A=1-260"/>
</dbReference>
<dbReference type="PDB" id="3T5U">
    <property type="method" value="X-ray"/>
    <property type="resolution" value="1.75 A"/>
    <property type="chains" value="A=2-260"/>
</dbReference>
<dbReference type="PDB" id="3T5Z">
    <property type="method" value="X-ray"/>
    <property type="resolution" value="1.65 A"/>
    <property type="chains" value="A=2-260"/>
</dbReference>
<dbReference type="PDB" id="3T82">
    <property type="method" value="X-ray"/>
    <property type="resolution" value="2.00 A"/>
    <property type="chains" value="A=1-260"/>
</dbReference>
<dbReference type="PDB" id="3T83">
    <property type="method" value="X-ray"/>
    <property type="resolution" value="1.80 A"/>
    <property type="chains" value="A=1-260"/>
</dbReference>
<dbReference type="PDB" id="3T84">
    <property type="method" value="X-ray"/>
    <property type="resolution" value="2.00 A"/>
    <property type="chains" value="A=1-260"/>
</dbReference>
<dbReference type="PDB" id="3T85">
    <property type="method" value="X-ray"/>
    <property type="resolution" value="2.40 A"/>
    <property type="chains" value="A=1-260"/>
</dbReference>
<dbReference type="PDB" id="3TMJ">
    <property type="method" value="Other"/>
    <property type="resolution" value="2.00 A"/>
    <property type="chains" value="A=3-260"/>
</dbReference>
<dbReference type="PDB" id="3TVN">
    <property type="method" value="X-ray"/>
    <property type="resolution" value="1.50 A"/>
    <property type="chains" value="X=3-260"/>
</dbReference>
<dbReference type="PDB" id="3TVO">
    <property type="method" value="X-ray"/>
    <property type="resolution" value="1.60 A"/>
    <property type="chains" value="X=3-260"/>
</dbReference>
<dbReference type="PDB" id="3U3A">
    <property type="method" value="X-ray"/>
    <property type="resolution" value="1.55 A"/>
    <property type="chains" value="X=1-260"/>
</dbReference>
<dbReference type="PDB" id="3U45">
    <property type="method" value="X-ray"/>
    <property type="resolution" value="1.70 A"/>
    <property type="chains" value="X=1-260"/>
</dbReference>
<dbReference type="PDB" id="3U47">
    <property type="method" value="X-ray"/>
    <property type="resolution" value="1.60 A"/>
    <property type="chains" value="A=1-260"/>
</dbReference>
<dbReference type="PDB" id="3U7C">
    <property type="method" value="X-ray"/>
    <property type="resolution" value="0.93 A"/>
    <property type="chains" value="A=1-260"/>
</dbReference>
<dbReference type="PDB" id="3V2J">
    <property type="method" value="X-ray"/>
    <property type="resolution" value="1.70 A"/>
    <property type="chains" value="A=1-260"/>
</dbReference>
<dbReference type="PDB" id="3V2M">
    <property type="method" value="X-ray"/>
    <property type="resolution" value="1.47 A"/>
    <property type="chains" value="A=1-260"/>
</dbReference>
<dbReference type="PDB" id="3V3F">
    <property type="method" value="X-ray"/>
    <property type="resolution" value="2.00 A"/>
    <property type="chains" value="A=1-260"/>
</dbReference>
<dbReference type="PDB" id="3V3G">
    <property type="method" value="X-ray"/>
    <property type="resolution" value="1.56 A"/>
    <property type="chains" value="B=1-260"/>
</dbReference>
<dbReference type="PDB" id="3V3H">
    <property type="method" value="X-ray"/>
    <property type="resolution" value="1.85 A"/>
    <property type="chains" value="B=1-260"/>
</dbReference>
<dbReference type="PDB" id="3V3I">
    <property type="method" value="X-ray"/>
    <property type="resolution" value="1.73 A"/>
    <property type="chains" value="B=1-260"/>
</dbReference>
<dbReference type="PDB" id="3V3J">
    <property type="method" value="X-ray"/>
    <property type="resolution" value="1.63 A"/>
    <property type="chains" value="A=1-260"/>
</dbReference>
<dbReference type="PDB" id="3V5G">
    <property type="method" value="X-ray"/>
    <property type="resolution" value="1.50 A"/>
    <property type="chains" value="A=1-260"/>
</dbReference>
<dbReference type="PDB" id="3V7X">
    <property type="method" value="X-ray"/>
    <property type="resolution" value="1.03 A"/>
    <property type="chains" value="A=2-260"/>
</dbReference>
<dbReference type="PDB" id="3VBD">
    <property type="method" value="X-ray"/>
    <property type="resolution" value="1.05 A"/>
    <property type="chains" value="A=2-260"/>
</dbReference>
<dbReference type="PDB" id="3ZP9">
    <property type="method" value="X-ray"/>
    <property type="resolution" value="1.31 A"/>
    <property type="chains" value="A=1-260"/>
</dbReference>
<dbReference type="PDB" id="4BCW">
    <property type="method" value="X-ray"/>
    <property type="resolution" value="1.50 A"/>
    <property type="chains" value="A=4-260"/>
</dbReference>
<dbReference type="PDB" id="4BF1">
    <property type="method" value="X-ray"/>
    <property type="resolution" value="1.35 A"/>
    <property type="chains" value="A=2-260"/>
</dbReference>
<dbReference type="PDB" id="4BF6">
    <property type="method" value="X-ray"/>
    <property type="resolution" value="1.82 A"/>
    <property type="chains" value="A=2-260"/>
</dbReference>
<dbReference type="PDB" id="4CA2">
    <property type="method" value="X-ray"/>
    <property type="resolution" value="2.10 A"/>
    <property type="chains" value="A=1-260"/>
</dbReference>
<dbReference type="PDB" id="4CAC">
    <property type="method" value="X-ray"/>
    <property type="resolution" value="2.20 A"/>
    <property type="chains" value="A=2-260"/>
</dbReference>
<dbReference type="PDB" id="4CQ0">
    <property type="method" value="X-ray"/>
    <property type="resolution" value="1.45 A"/>
    <property type="chains" value="A=1-260"/>
</dbReference>
<dbReference type="PDB" id="4DZ7">
    <property type="method" value="X-ray"/>
    <property type="resolution" value="1.49 A"/>
    <property type="chains" value="A=1-260"/>
</dbReference>
<dbReference type="PDB" id="4DZ9">
    <property type="method" value="X-ray"/>
    <property type="resolution" value="1.49 A"/>
    <property type="chains" value="A=1-260"/>
</dbReference>
<dbReference type="PDB" id="4E3D">
    <property type="method" value="X-ray"/>
    <property type="resolution" value="1.60 A"/>
    <property type="chains" value="A=1-260"/>
</dbReference>
<dbReference type="PDB" id="4E3F">
    <property type="method" value="X-ray"/>
    <property type="resolution" value="1.50 A"/>
    <property type="chains" value="A=1-260"/>
</dbReference>
<dbReference type="PDB" id="4E3G">
    <property type="method" value="X-ray"/>
    <property type="resolution" value="1.55 A"/>
    <property type="chains" value="A=1-260"/>
</dbReference>
<dbReference type="PDB" id="4E3H">
    <property type="method" value="X-ray"/>
    <property type="resolution" value="1.50 A"/>
    <property type="chains" value="A=1-260"/>
</dbReference>
<dbReference type="PDB" id="4E49">
    <property type="method" value="X-ray"/>
    <property type="resolution" value="1.45 A"/>
    <property type="chains" value="A=1-260"/>
</dbReference>
<dbReference type="PDB" id="4E4A">
    <property type="method" value="X-ray"/>
    <property type="resolution" value="1.45 A"/>
    <property type="chains" value="A=1-260"/>
</dbReference>
<dbReference type="PDB" id="4E5Q">
    <property type="method" value="X-ray"/>
    <property type="resolution" value="1.70 A"/>
    <property type="chains" value="A=1-260"/>
</dbReference>
<dbReference type="PDB" id="4FIK">
    <property type="method" value="X-ray"/>
    <property type="resolution" value="1.20 A"/>
    <property type="chains" value="A=1-260"/>
</dbReference>
<dbReference type="PDB" id="4FL7">
    <property type="method" value="X-ray"/>
    <property type="resolution" value="1.85 A"/>
    <property type="chains" value="A=2-260"/>
</dbReference>
<dbReference type="PDB" id="4FPT">
    <property type="method" value="X-ray"/>
    <property type="resolution" value="0.98 A"/>
    <property type="chains" value="A=1-260"/>
</dbReference>
<dbReference type="PDB" id="4FRC">
    <property type="method" value="X-ray"/>
    <property type="resolution" value="0.98 A"/>
    <property type="chains" value="A=1-260"/>
</dbReference>
<dbReference type="PDB" id="4FU5">
    <property type="method" value="X-ray"/>
    <property type="resolution" value="0.98 A"/>
    <property type="chains" value="A=1-260"/>
</dbReference>
<dbReference type="PDB" id="4FVN">
    <property type="method" value="X-ray"/>
    <property type="resolution" value="1.05 A"/>
    <property type="chains" value="A=1-260"/>
</dbReference>
<dbReference type="PDB" id="4FVO">
    <property type="method" value="X-ray"/>
    <property type="resolution" value="1.05 A"/>
    <property type="chains" value="A=1-260"/>
</dbReference>
<dbReference type="PDB" id="4G0C">
    <property type="method" value="Neutron"/>
    <property type="resolution" value="2.00 A"/>
    <property type="chains" value="A=4-260"/>
</dbReference>
<dbReference type="PDB" id="4GL1">
    <property type="method" value="X-ray"/>
    <property type="resolution" value="1.50 A"/>
    <property type="chains" value="X=1-260"/>
</dbReference>
<dbReference type="PDB" id="4HBA">
    <property type="method" value="X-ray"/>
    <property type="resolution" value="1.76 A"/>
    <property type="chains" value="A=1-260"/>
</dbReference>
<dbReference type="PDB" id="4HEW">
    <property type="method" value="X-ray"/>
    <property type="resolution" value="1.70 A"/>
    <property type="chains" value="A=1-260"/>
</dbReference>
<dbReference type="PDB" id="4HEY">
    <property type="method" value="X-ray"/>
    <property type="resolution" value="1.45 A"/>
    <property type="chains" value="A=1-260"/>
</dbReference>
<dbReference type="PDB" id="4HEZ">
    <property type="method" value="X-ray"/>
    <property type="resolution" value="1.34 A"/>
    <property type="chains" value="A=1-260"/>
</dbReference>
<dbReference type="PDB" id="4HF3">
    <property type="method" value="X-ray"/>
    <property type="resolution" value="1.15 A"/>
    <property type="chains" value="A=1-260"/>
</dbReference>
<dbReference type="PDB" id="4HT0">
    <property type="method" value="X-ray"/>
    <property type="resolution" value="1.60 A"/>
    <property type="chains" value="A=1-260"/>
</dbReference>
<dbReference type="PDB" id="4IDR">
    <property type="method" value="X-ray"/>
    <property type="resolution" value="1.60 A"/>
    <property type="chains" value="X=3-260"/>
</dbReference>
<dbReference type="PDB" id="4ILX">
    <property type="method" value="X-ray"/>
    <property type="resolution" value="1.60 A"/>
    <property type="chains" value="A=4-260"/>
</dbReference>
<dbReference type="PDB" id="4ITO">
    <property type="method" value="X-ray"/>
    <property type="resolution" value="1.16 A"/>
    <property type="chains" value="A=1-260"/>
</dbReference>
<dbReference type="PDB" id="4ITP">
    <property type="method" value="X-ray"/>
    <property type="resolution" value="1.70 A"/>
    <property type="chains" value="A=4-260"/>
</dbReference>
<dbReference type="PDB" id="4IWZ">
    <property type="method" value="X-ray"/>
    <property type="resolution" value="1.60 A"/>
    <property type="chains" value="A=4-260"/>
</dbReference>
<dbReference type="PDB" id="4JS6">
    <property type="method" value="X-ray"/>
    <property type="resolution" value="1.55 A"/>
    <property type="chains" value="A=1-260"/>
</dbReference>
<dbReference type="PDB" id="4JSA">
    <property type="method" value="X-ray"/>
    <property type="resolution" value="1.50 A"/>
    <property type="chains" value="A=1-260"/>
</dbReference>
<dbReference type="PDB" id="4JSS">
    <property type="method" value="X-ray"/>
    <property type="resolution" value="1.50 A"/>
    <property type="chains" value="A=1-260"/>
</dbReference>
<dbReference type="PDB" id="4JSW">
    <property type="method" value="X-ray"/>
    <property type="resolution" value="1.90 A"/>
    <property type="chains" value="A=1-260"/>
</dbReference>
<dbReference type="PDB" id="4JSZ">
    <property type="method" value="X-ray"/>
    <property type="resolution" value="1.90 A"/>
    <property type="chains" value="A=1-260"/>
</dbReference>
<dbReference type="PDB" id="4K0S">
    <property type="method" value="X-ray"/>
    <property type="resolution" value="1.80 A"/>
    <property type="chains" value="A=4-260"/>
</dbReference>
<dbReference type="PDB" id="4K0T">
    <property type="method" value="X-ray"/>
    <property type="resolution" value="1.78 A"/>
    <property type="chains" value="A=4-260"/>
</dbReference>
<dbReference type="PDB" id="4K0Z">
    <property type="method" value="X-ray"/>
    <property type="resolution" value="1.80 A"/>
    <property type="chains" value="A=3-260"/>
</dbReference>
<dbReference type="PDB" id="4K13">
    <property type="method" value="X-ray"/>
    <property type="resolution" value="1.60 A"/>
    <property type="chains" value="A=4-260"/>
</dbReference>
<dbReference type="PDB" id="4K1Q">
    <property type="method" value="X-ray"/>
    <property type="resolution" value="1.70 A"/>
    <property type="chains" value="A=3-260"/>
</dbReference>
<dbReference type="PDB" id="4KAP">
    <property type="method" value="X-ray"/>
    <property type="resolution" value="1.45 A"/>
    <property type="chains" value="A=5-260"/>
</dbReference>
<dbReference type="PDB" id="4KNI">
    <property type="method" value="X-ray"/>
    <property type="resolution" value="1.80 A"/>
    <property type="chains" value="A=1-260"/>
</dbReference>
<dbReference type="PDB" id="4KNJ">
    <property type="method" value="X-ray"/>
    <property type="resolution" value="2.00 A"/>
    <property type="chains" value="A=1-260"/>
</dbReference>
<dbReference type="PDB" id="4KUV">
    <property type="method" value="X-ray"/>
    <property type="resolution" value="1.35 A"/>
    <property type="chains" value="A=5-260"/>
</dbReference>
<dbReference type="PDB" id="4KUW">
    <property type="method" value="X-ray"/>
    <property type="resolution" value="1.55 A"/>
    <property type="chains" value="A=4-260"/>
</dbReference>
<dbReference type="PDB" id="4KUY">
    <property type="method" value="X-ray"/>
    <property type="resolution" value="1.65 A"/>
    <property type="chains" value="A=4-260"/>
</dbReference>
<dbReference type="PDB" id="4KV0">
    <property type="method" value="X-ray"/>
    <property type="resolution" value="1.55 A"/>
    <property type="chains" value="A=4-260"/>
</dbReference>
<dbReference type="PDB" id="4L5U">
    <property type="method" value="X-ray"/>
    <property type="resolution" value="2.05 A"/>
    <property type="chains" value="A=1-260"/>
</dbReference>
<dbReference type="PDB" id="4L5V">
    <property type="method" value="X-ray"/>
    <property type="resolution" value="1.63 A"/>
    <property type="chains" value="A=1-260"/>
</dbReference>
<dbReference type="PDB" id="4L5W">
    <property type="method" value="X-ray"/>
    <property type="resolution" value="1.70 A"/>
    <property type="chains" value="A=1-260"/>
</dbReference>
<dbReference type="PDB" id="4LHI">
    <property type="method" value="X-ray"/>
    <property type="resolution" value="1.60 A"/>
    <property type="chains" value="A=1-260"/>
</dbReference>
<dbReference type="PDB" id="4LP6">
    <property type="method" value="X-ray"/>
    <property type="resolution" value="2.15 A"/>
    <property type="chains" value="A/B=1-260"/>
</dbReference>
<dbReference type="PDB" id="4M2R">
    <property type="method" value="X-ray"/>
    <property type="resolution" value="1.99 A"/>
    <property type="chains" value="A=4-260"/>
</dbReference>
<dbReference type="PDB" id="4M2U">
    <property type="method" value="X-ray"/>
    <property type="resolution" value="2.00 A"/>
    <property type="chains" value="A=4-260"/>
</dbReference>
<dbReference type="PDB" id="4M2V">
    <property type="method" value="X-ray"/>
    <property type="resolution" value="1.72 A"/>
    <property type="chains" value="A=4-260"/>
</dbReference>
<dbReference type="PDB" id="4M2W">
    <property type="method" value="X-ray"/>
    <property type="resolution" value="1.66 A"/>
    <property type="chains" value="A=4-260"/>
</dbReference>
<dbReference type="PDB" id="4MDG">
    <property type="method" value="X-ray"/>
    <property type="resolution" value="1.35 A"/>
    <property type="chains" value="A=3-260"/>
</dbReference>
<dbReference type="PDB" id="4MDL">
    <property type="method" value="X-ray"/>
    <property type="resolution" value="1.52 A"/>
    <property type="chains" value="A=3-260"/>
</dbReference>
<dbReference type="PDB" id="4MDM">
    <property type="method" value="X-ray"/>
    <property type="resolution" value="1.55 A"/>
    <property type="chains" value="A=3-260"/>
</dbReference>
<dbReference type="PDB" id="4MLT">
    <property type="method" value="X-ray"/>
    <property type="resolution" value="2.00 A"/>
    <property type="chains" value="A=1-260"/>
</dbReference>
<dbReference type="PDB" id="4MLX">
    <property type="method" value="X-ray"/>
    <property type="resolution" value="1.65 A"/>
    <property type="chains" value="A=1-260"/>
</dbReference>
<dbReference type="PDB" id="4MO8">
    <property type="method" value="X-ray"/>
    <property type="resolution" value="1.85 A"/>
    <property type="chains" value="A=1-260"/>
</dbReference>
<dbReference type="PDB" id="4MTY">
    <property type="method" value="X-ray"/>
    <property type="resolution" value="1.00 A"/>
    <property type="chains" value="A=1-260"/>
</dbReference>
<dbReference type="PDB" id="4N0X">
    <property type="method" value="X-ray"/>
    <property type="resolution" value="1.63 A"/>
    <property type="chains" value="B=1-260"/>
</dbReference>
<dbReference type="PDB" id="4N16">
    <property type="method" value="X-ray"/>
    <property type="resolution" value="1.54 A"/>
    <property type="chains" value="A=1-260"/>
</dbReference>
<dbReference type="PDB" id="4PQ7">
    <property type="method" value="X-ray"/>
    <property type="resolution" value="1.85 A"/>
    <property type="chains" value="A=1-260"/>
</dbReference>
<dbReference type="PDB" id="4PXX">
    <property type="method" value="X-ray"/>
    <property type="resolution" value="1.85 A"/>
    <property type="chains" value="A=1-260"/>
</dbReference>
<dbReference type="PDB" id="4PYX">
    <property type="method" value="X-ray"/>
    <property type="resolution" value="1.80 A"/>
    <property type="chains" value="A=1-260"/>
</dbReference>
<dbReference type="PDB" id="4PYY">
    <property type="method" value="X-ray"/>
    <property type="resolution" value="1.75 A"/>
    <property type="chains" value="A=1-260"/>
</dbReference>
<dbReference type="PDB" id="4PZH">
    <property type="method" value="X-ray"/>
    <property type="resolution" value="1.06 A"/>
    <property type="chains" value="A=1-260"/>
</dbReference>
<dbReference type="PDB" id="4Q06">
    <property type="method" value="X-ray"/>
    <property type="resolution" value="1.15 A"/>
    <property type="chains" value="A=1-260"/>
</dbReference>
<dbReference type="PDB" id="4Q07">
    <property type="method" value="X-ray"/>
    <property type="resolution" value="1.15 A"/>
    <property type="chains" value="A=1-260"/>
</dbReference>
<dbReference type="PDB" id="4Q08">
    <property type="method" value="X-ray"/>
    <property type="resolution" value="1.07 A"/>
    <property type="chains" value="A=1-260"/>
</dbReference>
<dbReference type="PDB" id="4Q09">
    <property type="method" value="X-ray"/>
    <property type="resolution" value="1.20 A"/>
    <property type="chains" value="A=1-260"/>
</dbReference>
<dbReference type="PDB" id="4Q49">
    <property type="method" value="Neutron"/>
    <property type="resolution" value="1.80 A"/>
    <property type="chains" value="A=1-260"/>
</dbReference>
<dbReference type="PDB" id="4Q6D">
    <property type="method" value="X-ray"/>
    <property type="resolution" value="1.12 A"/>
    <property type="chains" value="A=1-260"/>
</dbReference>
<dbReference type="PDB" id="4Q6E">
    <property type="method" value="X-ray"/>
    <property type="resolution" value="1.12 A"/>
    <property type="chains" value="A=1-260"/>
</dbReference>
<dbReference type="PDB" id="4Q78">
    <property type="method" value="X-ray"/>
    <property type="resolution" value="1.00 A"/>
    <property type="chains" value="A=3-260"/>
</dbReference>
<dbReference type="PDB" id="4Q7P">
    <property type="method" value="X-ray"/>
    <property type="resolution" value="1.65 A"/>
    <property type="chains" value="A=1-260"/>
</dbReference>
<dbReference type="PDB" id="4Q7S">
    <property type="method" value="X-ray"/>
    <property type="resolution" value="1.80 A"/>
    <property type="chains" value="A=1-260"/>
</dbReference>
<dbReference type="PDB" id="4Q7V">
    <property type="method" value="X-ray"/>
    <property type="resolution" value="1.60 A"/>
    <property type="chains" value="A=1-260"/>
</dbReference>
<dbReference type="PDB" id="4Q7W">
    <property type="method" value="X-ray"/>
    <property type="resolution" value="1.45 A"/>
    <property type="chains" value="A=1-260"/>
</dbReference>
<dbReference type="PDB" id="4Q81">
    <property type="method" value="X-ray"/>
    <property type="resolution" value="1.55 A"/>
    <property type="chains" value="A=1-260"/>
</dbReference>
<dbReference type="PDB" id="4Q83">
    <property type="method" value="X-ray"/>
    <property type="resolution" value="1.55 A"/>
    <property type="chains" value="A=1-260"/>
</dbReference>
<dbReference type="PDB" id="4Q87">
    <property type="method" value="X-ray"/>
    <property type="resolution" value="1.55 A"/>
    <property type="chains" value="A=1-260"/>
</dbReference>
<dbReference type="PDB" id="4Q8X">
    <property type="method" value="X-ray"/>
    <property type="resolution" value="1.55 A"/>
    <property type="chains" value="A=1-260"/>
</dbReference>
<dbReference type="PDB" id="4Q8Y">
    <property type="method" value="X-ray"/>
    <property type="resolution" value="1.45 A"/>
    <property type="chains" value="A=1-260"/>
</dbReference>
<dbReference type="PDB" id="4Q8Z">
    <property type="method" value="X-ray"/>
    <property type="resolution" value="1.50 A"/>
    <property type="chains" value="A=1-260"/>
</dbReference>
<dbReference type="PDB" id="4Q90">
    <property type="method" value="X-ray"/>
    <property type="resolution" value="1.54 A"/>
    <property type="chains" value="A=1-260"/>
</dbReference>
<dbReference type="PDB" id="4Q99">
    <property type="method" value="X-ray"/>
    <property type="resolution" value="1.50 A"/>
    <property type="chains" value="A=1-260"/>
</dbReference>
<dbReference type="PDB" id="4Q9Y">
    <property type="method" value="X-ray"/>
    <property type="resolution" value="1.55 A"/>
    <property type="chains" value="A=1-260"/>
</dbReference>
<dbReference type="PDB" id="4QEF">
    <property type="method" value="X-ray"/>
    <property type="resolution" value="1.47 A"/>
    <property type="chains" value="A=1-260"/>
</dbReference>
<dbReference type="PDB" id="4QIY">
    <property type="method" value="X-ray"/>
    <property type="resolution" value="1.30 A"/>
    <property type="chains" value="A/B/C/D=1-260"/>
</dbReference>
<dbReference type="PDB" id="4QJM">
    <property type="method" value="X-ray"/>
    <property type="resolution" value="1.75 A"/>
    <property type="chains" value="A=1-260"/>
</dbReference>
<dbReference type="PDB" id="4QK1">
    <property type="method" value="X-ray"/>
    <property type="resolution" value="1.60 A"/>
    <property type="chains" value="A=1-260"/>
</dbReference>
<dbReference type="PDB" id="4QK2">
    <property type="method" value="X-ray"/>
    <property type="resolution" value="1.52 A"/>
    <property type="chains" value="A=1-260"/>
</dbReference>
<dbReference type="PDB" id="4QK3">
    <property type="method" value="X-ray"/>
    <property type="resolution" value="1.34 A"/>
    <property type="chains" value="A=1-260"/>
</dbReference>
<dbReference type="PDB" id="4QSA">
    <property type="method" value="X-ray"/>
    <property type="resolution" value="1.50 A"/>
    <property type="chains" value="A=1-260"/>
</dbReference>
<dbReference type="PDB" id="4QSB">
    <property type="method" value="X-ray"/>
    <property type="resolution" value="1.40 A"/>
    <property type="chains" value="A=1-260"/>
</dbReference>
<dbReference type="PDB" id="4QSI">
    <property type="method" value="X-ray"/>
    <property type="resolution" value="1.95 A"/>
    <property type="chains" value="A=1-260"/>
</dbReference>
<dbReference type="PDB" id="4QTL">
    <property type="method" value="X-ray"/>
    <property type="resolution" value="1.80 A"/>
    <property type="chains" value="A=1-260"/>
</dbReference>
<dbReference type="PDB" id="4QY3">
    <property type="method" value="X-ray"/>
    <property type="resolution" value="1.50 A"/>
    <property type="chains" value="A=2-260"/>
</dbReference>
<dbReference type="PDB" id="4R59">
    <property type="method" value="X-ray"/>
    <property type="resolution" value="1.65 A"/>
    <property type="chains" value="A=1-260"/>
</dbReference>
<dbReference type="PDB" id="4R5A">
    <property type="method" value="X-ray"/>
    <property type="resolution" value="1.64 A"/>
    <property type="chains" value="A=1-260"/>
</dbReference>
<dbReference type="PDB" id="4R5B">
    <property type="method" value="X-ray"/>
    <property type="resolution" value="1.50 A"/>
    <property type="chains" value="A=1-260"/>
</dbReference>
<dbReference type="PDB" id="4RFC">
    <property type="method" value="X-ray"/>
    <property type="resolution" value="1.65 A"/>
    <property type="chains" value="A=1-260"/>
</dbReference>
<dbReference type="PDB" id="4RFD">
    <property type="method" value="X-ray"/>
    <property type="resolution" value="1.63 A"/>
    <property type="chains" value="A=1-260"/>
</dbReference>
<dbReference type="PDB" id="4RH2">
    <property type="method" value="X-ray"/>
    <property type="resolution" value="1.30 A"/>
    <property type="chains" value="A=1-260"/>
</dbReference>
<dbReference type="PDB" id="4RIU">
    <property type="method" value="X-ray"/>
    <property type="resolution" value="1.65 A"/>
    <property type="chains" value="A=1-260"/>
</dbReference>
<dbReference type="PDB" id="4RIV">
    <property type="method" value="X-ray"/>
    <property type="resolution" value="1.63 A"/>
    <property type="chains" value="A=1-260"/>
</dbReference>
<dbReference type="PDB" id="4RN4">
    <property type="method" value="X-ray"/>
    <property type="resolution" value="1.53 A"/>
    <property type="chains" value="A=1-260"/>
</dbReference>
<dbReference type="PDB" id="4RUX">
    <property type="method" value="X-ray"/>
    <property type="resolution" value="1.14 A"/>
    <property type="chains" value="A=1-260"/>
</dbReference>
<dbReference type="PDB" id="4RUY">
    <property type="method" value="X-ray"/>
    <property type="resolution" value="1.14 A"/>
    <property type="chains" value="A=1-260"/>
</dbReference>
<dbReference type="PDB" id="4RUZ">
    <property type="method" value="X-ray"/>
    <property type="resolution" value="1.63 A"/>
    <property type="chains" value="A=1-260"/>
</dbReference>
<dbReference type="PDB" id="4WL4">
    <property type="method" value="X-ray"/>
    <property type="resolution" value="1.10 A"/>
    <property type="chains" value="A=1-260"/>
</dbReference>
<dbReference type="PDB" id="4WW6">
    <property type="method" value="X-ray"/>
    <property type="resolution" value="1.06 A"/>
    <property type="chains" value="A=1-260"/>
</dbReference>
<dbReference type="PDB" id="4XE1">
    <property type="method" value="X-ray"/>
    <property type="resolution" value="1.80 A"/>
    <property type="chains" value="A=1-260"/>
</dbReference>
<dbReference type="PDB" id="4Y0J">
    <property type="method" value="Neutron"/>
    <property type="resolution" value="2.00 A"/>
    <property type="chains" value="A=3-260"/>
</dbReference>
<dbReference type="PDB" id="4YGJ">
    <property type="method" value="X-ray"/>
    <property type="resolution" value="1.10 A"/>
    <property type="chains" value="A=3-260"/>
</dbReference>
<dbReference type="PDB" id="4YGK">
    <property type="method" value="X-ray"/>
    <property type="resolution" value="1.50 A"/>
    <property type="chains" value="A=3-260"/>
</dbReference>
<dbReference type="PDB" id="4YGL">
    <property type="method" value="X-ray"/>
    <property type="resolution" value="1.51 A"/>
    <property type="chains" value="A=3-260"/>
</dbReference>
<dbReference type="PDB" id="4YGN">
    <property type="method" value="X-ray"/>
    <property type="resolution" value="1.23 A"/>
    <property type="chains" value="A=3-260"/>
</dbReference>
<dbReference type="PDB" id="4YVY">
    <property type="method" value="X-ray"/>
    <property type="resolution" value="1.45 A"/>
    <property type="chains" value="A=2-260"/>
</dbReference>
<dbReference type="PDB" id="4YWP">
    <property type="method" value="X-ray"/>
    <property type="resolution" value="1.45 A"/>
    <property type="chains" value="A=4-260"/>
</dbReference>
<dbReference type="PDB" id="4YX4">
    <property type="method" value="X-ray"/>
    <property type="resolution" value="1.01 A"/>
    <property type="chains" value="A=1-260"/>
</dbReference>
<dbReference type="PDB" id="4YXI">
    <property type="method" value="X-ray"/>
    <property type="resolution" value="0.96 A"/>
    <property type="chains" value="A=1-260"/>
</dbReference>
<dbReference type="PDB" id="4YXO">
    <property type="method" value="X-ray"/>
    <property type="resolution" value="1.06 A"/>
    <property type="chains" value="A=1-260"/>
</dbReference>
<dbReference type="PDB" id="4YXU">
    <property type="method" value="X-ray"/>
    <property type="resolution" value="1.08 A"/>
    <property type="chains" value="A=1-260"/>
</dbReference>
<dbReference type="PDB" id="4YYT">
    <property type="method" value="X-ray"/>
    <property type="resolution" value="1.07 A"/>
    <property type="chains" value="A=1-260"/>
</dbReference>
<dbReference type="PDB" id="4Z0Q">
    <property type="method" value="X-ray"/>
    <property type="resolution" value="1.45 A"/>
    <property type="chains" value="A=3-260"/>
</dbReference>
<dbReference type="PDB" id="4Z1E">
    <property type="method" value="X-ray"/>
    <property type="resolution" value="2.01 A"/>
    <property type="chains" value="A=2-260"/>
</dbReference>
<dbReference type="PDB" id="4Z1J">
    <property type="method" value="X-ray"/>
    <property type="resolution" value="1.27 A"/>
    <property type="chains" value="A=3-260"/>
</dbReference>
<dbReference type="PDB" id="4Z1K">
    <property type="method" value="X-ray"/>
    <property type="resolution" value="1.35 A"/>
    <property type="chains" value="A=4-260"/>
</dbReference>
<dbReference type="PDB" id="4Z1N">
    <property type="method" value="X-ray"/>
    <property type="resolution" value="1.47 A"/>
    <property type="chains" value="A=3-260"/>
</dbReference>
<dbReference type="PDB" id="4ZAO">
    <property type="method" value="X-ray"/>
    <property type="resolution" value="1.80 A"/>
    <property type="chains" value="A=1-257"/>
</dbReference>
<dbReference type="PDB" id="4ZWI">
    <property type="method" value="X-ray"/>
    <property type="resolution" value="1.60 A"/>
    <property type="chains" value="A=4-260"/>
</dbReference>
<dbReference type="PDB" id="4ZWX">
    <property type="method" value="X-ray"/>
    <property type="resolution" value="1.70 A"/>
    <property type="chains" value="A=4-260"/>
</dbReference>
<dbReference type="PDB" id="4ZWY">
    <property type="method" value="X-ray"/>
    <property type="resolution" value="1.50 A"/>
    <property type="chains" value="A=4-260"/>
</dbReference>
<dbReference type="PDB" id="4ZWZ">
    <property type="method" value="X-ray"/>
    <property type="resolution" value="1.62 A"/>
    <property type="chains" value="A=4-260"/>
</dbReference>
<dbReference type="PDB" id="4ZX0">
    <property type="method" value="X-ray"/>
    <property type="resolution" value="1.60 A"/>
    <property type="chains" value="A=4-260"/>
</dbReference>
<dbReference type="PDB" id="4ZX1">
    <property type="method" value="X-ray"/>
    <property type="resolution" value="1.50 A"/>
    <property type="chains" value="A=4-260"/>
</dbReference>
<dbReference type="PDB" id="5A6H">
    <property type="method" value="X-ray"/>
    <property type="resolution" value="1.57 A"/>
    <property type="chains" value="A=1-260"/>
</dbReference>
<dbReference type="PDB" id="5AMD">
    <property type="method" value="X-ray"/>
    <property type="resolution" value="1.50 A"/>
    <property type="chains" value="A=2-260"/>
</dbReference>
<dbReference type="PDB" id="5AMG">
    <property type="method" value="X-ray"/>
    <property type="resolution" value="1.55 A"/>
    <property type="chains" value="A=2-260"/>
</dbReference>
<dbReference type="PDB" id="5AML">
    <property type="method" value="X-ray"/>
    <property type="resolution" value="1.36 A"/>
    <property type="chains" value="A=2-260"/>
</dbReference>
<dbReference type="PDB" id="5BNL">
    <property type="method" value="X-ray"/>
    <property type="resolution" value="2.00 A"/>
    <property type="chains" value="A=4-260"/>
</dbReference>
<dbReference type="PDB" id="5BRU">
    <property type="method" value="X-ray"/>
    <property type="resolution" value="1.60 A"/>
    <property type="chains" value="A=3-260"/>
</dbReference>
<dbReference type="PDB" id="5BRV">
    <property type="method" value="X-ray"/>
    <property type="resolution" value="1.60 A"/>
    <property type="chains" value="A=3-260"/>
</dbReference>
<dbReference type="PDB" id="5BRW">
    <property type="method" value="X-ray"/>
    <property type="resolution" value="1.40 A"/>
    <property type="chains" value="A=1-260"/>
</dbReference>
<dbReference type="PDB" id="5BYI">
    <property type="method" value="X-ray"/>
    <property type="resolution" value="1.15 A"/>
    <property type="chains" value="A=1-260"/>
</dbReference>
<dbReference type="PDB" id="5C8I">
    <property type="method" value="Other"/>
    <property type="resolution" value="1.56 A"/>
    <property type="chains" value="A=1-260"/>
</dbReference>
<dbReference type="PDB" id="5CA2">
    <property type="method" value="X-ray"/>
    <property type="resolution" value="2.10 A"/>
    <property type="chains" value="A=1-260"/>
</dbReference>
<dbReference type="PDB" id="5CAC">
    <property type="method" value="X-ray"/>
    <property type="resolution" value="2.20 A"/>
    <property type="chains" value="A=2-260"/>
</dbReference>
<dbReference type="PDB" id="5CLU">
    <property type="method" value="X-ray"/>
    <property type="resolution" value="1.55 A"/>
    <property type="chains" value="A=4-260"/>
</dbReference>
<dbReference type="PDB" id="5DOG">
    <property type="method" value="X-ray"/>
    <property type="resolution" value="1.70 A"/>
    <property type="chains" value="A=1-260"/>
</dbReference>
<dbReference type="PDB" id="5DOH">
    <property type="method" value="X-ray"/>
    <property type="resolution" value="1.05 A"/>
    <property type="chains" value="A/B=1-260"/>
</dbReference>
<dbReference type="PDB" id="5DRS">
    <property type="method" value="X-ray"/>
    <property type="resolution" value="1.10 A"/>
    <property type="chains" value="A=1-260"/>
</dbReference>
<dbReference type="PDB" id="5DSK">
    <property type="method" value="X-ray"/>
    <property type="resolution" value="1.30 A"/>
    <property type="chains" value="A=1-260"/>
</dbReference>
<dbReference type="PDB" id="5DSL">
    <property type="method" value="X-ray"/>
    <property type="resolution" value="1.45 A"/>
    <property type="chains" value="A=1-260"/>
</dbReference>
<dbReference type="PDB" id="5DSM">
    <property type="method" value="X-ray"/>
    <property type="resolution" value="1.30 A"/>
    <property type="chains" value="A=1-260"/>
</dbReference>
<dbReference type="PDB" id="5DSO">
    <property type="method" value="X-ray"/>
    <property type="resolution" value="1.40 A"/>
    <property type="chains" value="A=1-260"/>
</dbReference>
<dbReference type="PDB" id="5DSP">
    <property type="method" value="X-ray"/>
    <property type="resolution" value="1.40 A"/>
    <property type="chains" value="A=1-260"/>
</dbReference>
<dbReference type="PDB" id="5DSQ">
    <property type="method" value="X-ray"/>
    <property type="resolution" value="1.50 A"/>
    <property type="chains" value="A=1-260"/>
</dbReference>
<dbReference type="PDB" id="5DSR">
    <property type="method" value="X-ray"/>
    <property type="resolution" value="1.30 A"/>
    <property type="chains" value="A=1-260"/>
</dbReference>
<dbReference type="PDB" id="5E28">
    <property type="method" value="X-ray"/>
    <property type="resolution" value="1.30 A"/>
    <property type="chains" value="A=4-260"/>
</dbReference>
<dbReference type="PDB" id="5E2K">
    <property type="method" value="X-ray"/>
    <property type="resolution" value="1.40 A"/>
    <property type="chains" value="A=4-260"/>
</dbReference>
<dbReference type="PDB" id="5E2R">
    <property type="method" value="X-ray"/>
    <property type="resolution" value="1.60 A"/>
    <property type="chains" value="A=1-260"/>
</dbReference>
<dbReference type="PDB" id="5E2S">
    <property type="method" value="X-ray"/>
    <property type="resolution" value="1.50 A"/>
    <property type="chains" value="A=3-260"/>
</dbReference>
<dbReference type="PDB" id="5EH5">
    <property type="method" value="X-ray"/>
    <property type="resolution" value="1.21 A"/>
    <property type="chains" value="A=1-260"/>
</dbReference>
<dbReference type="PDB" id="5EH7">
    <property type="method" value="X-ray"/>
    <property type="resolution" value="1.43 A"/>
    <property type="chains" value="A=1-260"/>
</dbReference>
<dbReference type="PDB" id="5EH8">
    <property type="method" value="X-ray"/>
    <property type="resolution" value="1.38 A"/>
    <property type="chains" value="A=1-260"/>
</dbReference>
<dbReference type="PDB" id="5EHE">
    <property type="method" value="X-ray"/>
    <property type="resolution" value="1.50 A"/>
    <property type="chains" value="A=1-260"/>
</dbReference>
<dbReference type="PDB" id="5EHV">
    <property type="method" value="X-ray"/>
    <property type="resolution" value="1.21 A"/>
    <property type="chains" value="A=1-260"/>
</dbReference>
<dbReference type="PDB" id="5EHW">
    <property type="method" value="X-ray"/>
    <property type="resolution" value="1.39 A"/>
    <property type="chains" value="A=1-260"/>
</dbReference>
<dbReference type="PDB" id="5EIJ">
    <property type="method" value="X-ray"/>
    <property type="resolution" value="1.99 A"/>
    <property type="chains" value="A=4-260"/>
</dbReference>
<dbReference type="PDB" id="5EKH">
    <property type="method" value="X-ray"/>
    <property type="resolution" value="1.34 A"/>
    <property type="chains" value="A=1-260"/>
</dbReference>
<dbReference type="PDB" id="5EKJ">
    <property type="method" value="X-ray"/>
    <property type="resolution" value="1.13 A"/>
    <property type="chains" value="A=1-260"/>
</dbReference>
<dbReference type="PDB" id="5EKM">
    <property type="method" value="X-ray"/>
    <property type="resolution" value="1.33 A"/>
    <property type="chains" value="A=1-260"/>
</dbReference>
<dbReference type="PDB" id="5EOI">
    <property type="method" value="X-ray"/>
    <property type="resolution" value="1.80 A"/>
    <property type="chains" value="A=3-260"/>
</dbReference>
<dbReference type="PDB" id="5FDC">
    <property type="method" value="X-ray"/>
    <property type="resolution" value="1.75 A"/>
    <property type="chains" value="A=1-260"/>
</dbReference>
<dbReference type="PDB" id="5FDI">
    <property type="method" value="X-ray"/>
    <property type="resolution" value="1.85 A"/>
    <property type="chains" value="A=1-260"/>
</dbReference>
<dbReference type="PDB" id="5FLO">
    <property type="method" value="X-ray"/>
    <property type="resolution" value="1.66 A"/>
    <property type="chains" value="A=1-260"/>
</dbReference>
<dbReference type="PDB" id="5FLP">
    <property type="method" value="X-ray"/>
    <property type="resolution" value="1.71 A"/>
    <property type="chains" value="A=1-260"/>
</dbReference>
<dbReference type="PDB" id="5FLQ">
    <property type="method" value="X-ray"/>
    <property type="resolution" value="1.70 A"/>
    <property type="chains" value="A=1-260"/>
</dbReference>
<dbReference type="PDB" id="5FLR">
    <property type="method" value="X-ray"/>
    <property type="resolution" value="1.68 A"/>
    <property type="chains" value="A=1-260"/>
</dbReference>
<dbReference type="PDB" id="5FLS">
    <property type="method" value="X-ray"/>
    <property type="resolution" value="1.67 A"/>
    <property type="chains" value="A=1-260"/>
</dbReference>
<dbReference type="PDB" id="5FLT">
    <property type="method" value="X-ray"/>
    <property type="resolution" value="1.67 A"/>
    <property type="chains" value="A=1-260"/>
</dbReference>
<dbReference type="PDB" id="5FNG">
    <property type="method" value="X-ray"/>
    <property type="resolution" value="2.05 A"/>
    <property type="chains" value="A=1-260"/>
</dbReference>
<dbReference type="PDB" id="5FNH">
    <property type="method" value="X-ray"/>
    <property type="resolution" value="1.66 A"/>
    <property type="chains" value="A=1-260"/>
</dbReference>
<dbReference type="PDB" id="5FNI">
    <property type="method" value="X-ray"/>
    <property type="resolution" value="1.60 A"/>
    <property type="chains" value="A=1-260"/>
</dbReference>
<dbReference type="PDB" id="5FNJ">
    <property type="method" value="X-ray"/>
    <property type="resolution" value="1.67 A"/>
    <property type="chains" value="A=1-260"/>
</dbReference>
<dbReference type="PDB" id="5FNK">
    <property type="method" value="X-ray"/>
    <property type="resolution" value="1.59 A"/>
    <property type="chains" value="A=1-260"/>
</dbReference>
<dbReference type="PDB" id="5FNL">
    <property type="method" value="X-ray"/>
    <property type="resolution" value="1.59 A"/>
    <property type="chains" value="A=1-260"/>
</dbReference>
<dbReference type="PDB" id="5FNM">
    <property type="method" value="X-ray"/>
    <property type="resolution" value="1.59 A"/>
    <property type="chains" value="A=1-260"/>
</dbReference>
<dbReference type="PDB" id="5G01">
    <property type="method" value="X-ray"/>
    <property type="resolution" value="1.40 A"/>
    <property type="chains" value="A=1-260"/>
</dbReference>
<dbReference type="PDB" id="5G03">
    <property type="method" value="X-ray"/>
    <property type="resolution" value="1.35 A"/>
    <property type="chains" value="A=1-260"/>
</dbReference>
<dbReference type="PDB" id="5G0B">
    <property type="method" value="X-ray"/>
    <property type="resolution" value="1.55 A"/>
    <property type="chains" value="A=1-260"/>
</dbReference>
<dbReference type="PDB" id="5G0C">
    <property type="method" value="X-ray"/>
    <property type="resolution" value="1.28 A"/>
    <property type="chains" value="A=1-260"/>
</dbReference>
<dbReference type="PDB" id="5GMN">
    <property type="method" value="X-ray"/>
    <property type="resolution" value="1.80 A"/>
    <property type="chains" value="A=1-260"/>
</dbReference>
<dbReference type="PDB" id="5J8Z">
    <property type="method" value="X-ray"/>
    <property type="resolution" value="1.70 A"/>
    <property type="chains" value="A=1-260"/>
</dbReference>
<dbReference type="PDB" id="5JDV">
    <property type="method" value="X-ray"/>
    <property type="resolution" value="1.34 A"/>
    <property type="chains" value="B=3-260"/>
</dbReference>
<dbReference type="PDB" id="5JE7">
    <property type="method" value="X-ray"/>
    <property type="resolution" value="1.15 A"/>
    <property type="chains" value="B=4-260"/>
</dbReference>
<dbReference type="PDB" id="5JEG">
    <property type="method" value="X-ray"/>
    <property type="resolution" value="1.19 A"/>
    <property type="chains" value="B=3-260"/>
</dbReference>
<dbReference type="PDB" id="5JEH">
    <property type="method" value="X-ray"/>
    <property type="resolution" value="1.13 A"/>
    <property type="chains" value="B=3-260"/>
</dbReference>
<dbReference type="PDB" id="5JEP">
    <property type="method" value="X-ray"/>
    <property type="resolution" value="1.19 A"/>
    <property type="chains" value="B=3-260"/>
</dbReference>
<dbReference type="PDB" id="5JES">
    <property type="method" value="X-ray"/>
    <property type="resolution" value="1.21 A"/>
    <property type="chains" value="B=3-259"/>
</dbReference>
<dbReference type="PDB" id="5JG3">
    <property type="method" value="X-ray"/>
    <property type="resolution" value="1.21 A"/>
    <property type="chains" value="B=3-260"/>
</dbReference>
<dbReference type="PDB" id="5JG5">
    <property type="method" value="X-ray"/>
    <property type="resolution" value="1.19 A"/>
    <property type="chains" value="B=3-260"/>
</dbReference>
<dbReference type="PDB" id="5JGS">
    <property type="method" value="X-ray"/>
    <property type="resolution" value="1.11 A"/>
    <property type="chains" value="B=4-260"/>
</dbReference>
<dbReference type="PDB" id="5JGT">
    <property type="method" value="X-ray"/>
    <property type="resolution" value="1.10 A"/>
    <property type="chains" value="B=3-260"/>
</dbReference>
<dbReference type="PDB" id="5JMZ">
    <property type="method" value="X-ray"/>
    <property type="resolution" value="1.90 A"/>
    <property type="chains" value="A=4-260"/>
</dbReference>
<dbReference type="PDB" id="5JN3">
    <property type="method" value="X-ray"/>
    <property type="resolution" value="1.60 A"/>
    <property type="chains" value="A=4-260"/>
</dbReference>
<dbReference type="PDB" id="5JN7">
    <property type="method" value="X-ray"/>
    <property type="resolution" value="1.52 A"/>
    <property type="chains" value="A=4-260"/>
</dbReference>
<dbReference type="PDB" id="5JQ0">
    <property type="method" value="X-ray"/>
    <property type="resolution" value="1.40 A"/>
    <property type="chains" value="A=1-260"/>
</dbReference>
<dbReference type="PDB" id="5JQT">
    <property type="method" value="X-ray"/>
    <property type="resolution" value="1.36 A"/>
    <property type="chains" value="A=1-260"/>
</dbReference>
<dbReference type="PDB" id="5L3O">
    <property type="method" value="X-ray"/>
    <property type="resolution" value="1.98 A"/>
    <property type="chains" value="A/B=1-260"/>
</dbReference>
<dbReference type="PDB" id="5L6K">
    <property type="method" value="X-ray"/>
    <property type="resolution" value="1.70 A"/>
    <property type="chains" value="A/B=1-260"/>
</dbReference>
<dbReference type="PDB" id="5L6T">
    <property type="method" value="X-ray"/>
    <property type="resolution" value="2.65 A"/>
    <property type="chains" value="A/B=1-260"/>
</dbReference>
<dbReference type="PDB" id="5L70">
    <property type="method" value="X-ray"/>
    <property type="resolution" value="2.20 A"/>
    <property type="chains" value="A/B=1-260"/>
</dbReference>
<dbReference type="PDB" id="5L9E">
    <property type="method" value="X-ray"/>
    <property type="resolution" value="2.90 A"/>
    <property type="chains" value="A/B/C/D=1-260"/>
</dbReference>
<dbReference type="PDB" id="5LJQ">
    <property type="method" value="X-ray"/>
    <property type="resolution" value="1.05 A"/>
    <property type="chains" value="A=3-260"/>
</dbReference>
<dbReference type="PDB" id="5LJT">
    <property type="method" value="X-ray"/>
    <property type="resolution" value="1.00 A"/>
    <property type="chains" value="A=3-260"/>
</dbReference>
<dbReference type="PDB" id="5LL4">
    <property type="method" value="X-ray"/>
    <property type="resolution" value="1.12 A"/>
    <property type="chains" value="A/B=1-260"/>
</dbReference>
<dbReference type="PDB" id="5LL8">
    <property type="method" value="X-ray"/>
    <property type="resolution" value="1.03 A"/>
    <property type="chains" value="A=1-260"/>
</dbReference>
<dbReference type="PDB" id="5LLC">
    <property type="method" value="X-ray"/>
    <property type="resolution" value="1.10 A"/>
    <property type="chains" value="A=1-260"/>
</dbReference>
<dbReference type="PDB" id="5LLE">
    <property type="method" value="X-ray"/>
    <property type="resolution" value="1.90 A"/>
    <property type="chains" value="A=1-260"/>
</dbReference>
<dbReference type="PDB" id="5LLG">
    <property type="method" value="X-ray"/>
    <property type="resolution" value="1.12 A"/>
    <property type="chains" value="A=1-260"/>
</dbReference>
<dbReference type="PDB" id="5LLH">
    <property type="method" value="X-ray"/>
    <property type="resolution" value="1.90 A"/>
    <property type="chains" value="A=1-260"/>
</dbReference>
<dbReference type="PDB" id="5LMD">
    <property type="method" value="X-ray"/>
    <property type="resolution" value="1.70 A"/>
    <property type="chains" value="A=1-260"/>
</dbReference>
<dbReference type="PDB" id="5LVS">
    <property type="method" value="X-ray"/>
    <property type="resolution" value="1.42 A"/>
    <property type="chains" value="A/B=2-260"/>
</dbReference>
<dbReference type="PDB" id="5M78">
    <property type="method" value="X-ray"/>
    <property type="resolution" value="1.08 A"/>
    <property type="chains" value="A=1-260"/>
</dbReference>
<dbReference type="PDB" id="5MJN">
    <property type="method" value="X-ray"/>
    <property type="resolution" value="1.17 A"/>
    <property type="chains" value="A=2-260"/>
</dbReference>
<dbReference type="PDB" id="5N0D">
    <property type="method" value="X-ray"/>
    <property type="resolution" value="1.70 A"/>
    <property type="chains" value="A=1-260"/>
</dbReference>
<dbReference type="PDB" id="5N0E">
    <property type="method" value="X-ray"/>
    <property type="resolution" value="1.75 A"/>
    <property type="chains" value="A=1-260"/>
</dbReference>
<dbReference type="PDB" id="5N1R">
    <property type="method" value="X-ray"/>
    <property type="resolution" value="1.30 A"/>
    <property type="chains" value="A=1-260"/>
</dbReference>
<dbReference type="PDB" id="5N1S">
    <property type="method" value="X-ray"/>
    <property type="resolution" value="1.30 A"/>
    <property type="chains" value="A=1-260"/>
</dbReference>
<dbReference type="PDB" id="5N24">
    <property type="method" value="X-ray"/>
    <property type="resolution" value="1.50 A"/>
    <property type="chains" value="A=1-260"/>
</dbReference>
<dbReference type="PDB" id="5N25">
    <property type="method" value="X-ray"/>
    <property type="resolution" value="1.40 A"/>
    <property type="chains" value="A=1-260"/>
</dbReference>
<dbReference type="PDB" id="5NEA">
    <property type="method" value="X-ray"/>
    <property type="resolution" value="1.30 A"/>
    <property type="chains" value="A=1-260"/>
</dbReference>
<dbReference type="PDB" id="5NEE">
    <property type="method" value="X-ray"/>
    <property type="resolution" value="1.70 A"/>
    <property type="chains" value="A=1-260"/>
</dbReference>
<dbReference type="PDB" id="5NXG">
    <property type="method" value="X-ray"/>
    <property type="resolution" value="1.20 A"/>
    <property type="chains" value="A=4-260"/>
</dbReference>
<dbReference type="PDB" id="5NXI">
    <property type="method" value="X-ray"/>
    <property type="resolution" value="1.16 A"/>
    <property type="chains" value="A=3-260"/>
</dbReference>
<dbReference type="PDB" id="5NXM">
    <property type="method" value="X-ray"/>
    <property type="resolution" value="1.25 A"/>
    <property type="chains" value="A=3-260"/>
</dbReference>
<dbReference type="PDB" id="5NXO">
    <property type="method" value="X-ray"/>
    <property type="resolution" value="1.20 A"/>
    <property type="chains" value="A=3-260"/>
</dbReference>
<dbReference type="PDB" id="5NXP">
    <property type="method" value="X-ray"/>
    <property type="resolution" value="1.25 A"/>
    <property type="chains" value="A=3-260"/>
</dbReference>
<dbReference type="PDB" id="5NXV">
    <property type="method" value="X-ray"/>
    <property type="resolution" value="1.10 A"/>
    <property type="chains" value="A=3-260"/>
</dbReference>
<dbReference type="PDB" id="5NXW">
    <property type="method" value="X-ray"/>
    <property type="resolution" value="1.10 A"/>
    <property type="chains" value="A=4-260"/>
</dbReference>
<dbReference type="PDB" id="5NY1">
    <property type="method" value="X-ray"/>
    <property type="resolution" value="1.10 A"/>
    <property type="chains" value="A=4-260"/>
</dbReference>
<dbReference type="PDB" id="5NY3">
    <property type="method" value="X-ray"/>
    <property type="resolution" value="1.40 A"/>
    <property type="chains" value="A=3-260"/>
</dbReference>
<dbReference type="PDB" id="5NY6">
    <property type="method" value="X-ray"/>
    <property type="resolution" value="1.10 A"/>
    <property type="chains" value="A=3-260"/>
</dbReference>
<dbReference type="PDB" id="5NYA">
    <property type="method" value="X-ray"/>
    <property type="resolution" value="1.20 A"/>
    <property type="chains" value="A=4-260"/>
</dbReference>
<dbReference type="PDB" id="5O07">
    <property type="method" value="X-ray"/>
    <property type="resolution" value="1.80 A"/>
    <property type="chains" value="A=1-260"/>
</dbReference>
<dbReference type="PDB" id="5OGN">
    <property type="method" value="X-ray"/>
    <property type="resolution" value="1.10 A"/>
    <property type="chains" value="A/B=3-260"/>
</dbReference>
<dbReference type="PDB" id="5OGO">
    <property type="method" value="X-ray"/>
    <property type="resolution" value="0.99 A"/>
    <property type="chains" value="A=1-260"/>
</dbReference>
<dbReference type="PDB" id="5OGP">
    <property type="method" value="X-ray"/>
    <property type="resolution" value="1.10 A"/>
    <property type="chains" value="A=2-260"/>
</dbReference>
<dbReference type="PDB" id="5SZ0">
    <property type="method" value="X-ray"/>
    <property type="resolution" value="1.63 A"/>
    <property type="chains" value="A=4-260"/>
</dbReference>
<dbReference type="PDB" id="5SZ1">
    <property type="method" value="X-ray"/>
    <property type="resolution" value="1.55 A"/>
    <property type="chains" value="A=4-260"/>
</dbReference>
<dbReference type="PDB" id="5SZ2">
    <property type="method" value="X-ray"/>
    <property type="resolution" value="1.63 A"/>
    <property type="chains" value="A=4-260"/>
</dbReference>
<dbReference type="PDB" id="5SZ3">
    <property type="method" value="X-ray"/>
    <property type="resolution" value="1.69 A"/>
    <property type="chains" value="A=4-260"/>
</dbReference>
<dbReference type="PDB" id="5SZ4">
    <property type="method" value="X-ray"/>
    <property type="resolution" value="1.60 A"/>
    <property type="chains" value="A=4-260"/>
</dbReference>
<dbReference type="PDB" id="5SZ5">
    <property type="method" value="X-ray"/>
    <property type="resolution" value="1.27 A"/>
    <property type="chains" value="A=4-260"/>
</dbReference>
<dbReference type="PDB" id="5SZ6">
    <property type="method" value="X-ray"/>
    <property type="resolution" value="1.15 A"/>
    <property type="chains" value="A=4-260"/>
</dbReference>
<dbReference type="PDB" id="5SZ7">
    <property type="method" value="X-ray"/>
    <property type="resolution" value="1.78 A"/>
    <property type="chains" value="A=4-260"/>
</dbReference>
<dbReference type="PDB" id="5T71">
    <property type="method" value="X-ray"/>
    <property type="resolution" value="1.30 A"/>
    <property type="chains" value="A=1-260"/>
</dbReference>
<dbReference type="PDB" id="5T72">
    <property type="method" value="X-ray"/>
    <property type="resolution" value="1.30 A"/>
    <property type="chains" value="A=1-260"/>
</dbReference>
<dbReference type="PDB" id="5T74">
    <property type="method" value="X-ray"/>
    <property type="resolution" value="1.20 A"/>
    <property type="chains" value="A=1-260"/>
</dbReference>
<dbReference type="PDB" id="5T75">
    <property type="method" value="X-ray"/>
    <property type="resolution" value="1.50 A"/>
    <property type="chains" value="A=1-260"/>
</dbReference>
<dbReference type="PDB" id="5TFX">
    <property type="method" value="X-ray"/>
    <property type="resolution" value="1.50 A"/>
    <property type="chains" value="A=1-260"/>
</dbReference>
<dbReference type="PDB" id="5TH4">
    <property type="method" value="X-ray"/>
    <property type="resolution" value="1.47 A"/>
    <property type="chains" value="A=1-260"/>
</dbReference>
<dbReference type="PDB" id="5THI">
    <property type="method" value="X-ray"/>
    <property type="resolution" value="1.50 A"/>
    <property type="chains" value="A=1-260"/>
</dbReference>
<dbReference type="PDB" id="5THJ">
    <property type="method" value="X-ray"/>
    <property type="resolution" value="1.50 A"/>
    <property type="chains" value="A=1-260"/>
</dbReference>
<dbReference type="PDB" id="5THN">
    <property type="method" value="X-ray"/>
    <property type="resolution" value="1.33 A"/>
    <property type="chains" value="A=1-260"/>
</dbReference>
<dbReference type="PDB" id="5TI0">
    <property type="method" value="X-ray"/>
    <property type="resolution" value="1.42 A"/>
    <property type="chains" value="A=1-260"/>
</dbReference>
<dbReference type="PDB" id="5TXY">
    <property type="method" value="X-ray"/>
    <property type="resolution" value="1.21 A"/>
    <property type="chains" value="A=1-260"/>
</dbReference>
<dbReference type="PDB" id="5TY1">
    <property type="method" value="X-ray"/>
    <property type="resolution" value="1.60 A"/>
    <property type="chains" value="A=1-260"/>
</dbReference>
<dbReference type="PDB" id="5TY8">
    <property type="method" value="X-ray"/>
    <property type="resolution" value="1.45 A"/>
    <property type="chains" value="A=1-260"/>
</dbReference>
<dbReference type="PDB" id="5TY9">
    <property type="method" value="X-ray"/>
    <property type="resolution" value="1.53 A"/>
    <property type="chains" value="A=1-260"/>
</dbReference>
<dbReference type="PDB" id="5TYA">
    <property type="method" value="X-ray"/>
    <property type="resolution" value="1.50 A"/>
    <property type="chains" value="A=1-260"/>
</dbReference>
<dbReference type="PDB" id="5U0D">
    <property type="method" value="X-ray"/>
    <property type="resolution" value="1.59 A"/>
    <property type="chains" value="A=1-260"/>
</dbReference>
<dbReference type="PDB" id="5U0E">
    <property type="method" value="X-ray"/>
    <property type="resolution" value="1.27 A"/>
    <property type="chains" value="A=1-260"/>
</dbReference>
<dbReference type="PDB" id="5U0F">
    <property type="method" value="X-ray"/>
    <property type="resolution" value="1.21 A"/>
    <property type="chains" value="A=1-260"/>
</dbReference>
<dbReference type="PDB" id="5U0G">
    <property type="method" value="X-ray"/>
    <property type="resolution" value="1.54 A"/>
    <property type="chains" value="A=1-260"/>
</dbReference>
<dbReference type="PDB" id="5ULN">
    <property type="method" value="X-ray"/>
    <property type="resolution" value="1.35 A"/>
    <property type="chains" value="A=1-260"/>
</dbReference>
<dbReference type="PDB" id="5UMC">
    <property type="method" value="X-ray"/>
    <property type="resolution" value="2.15 A"/>
    <property type="chains" value="A=1-260"/>
</dbReference>
<dbReference type="PDB" id="5VGY">
    <property type="method" value="X-ray"/>
    <property type="resolution" value="1.39 A"/>
    <property type="chains" value="A=1-260"/>
</dbReference>
<dbReference type="PDB" id="5W8B">
    <property type="method" value="X-ray"/>
    <property type="resolution" value="1.60 A"/>
    <property type="chains" value="A=4-260"/>
</dbReference>
<dbReference type="PDB" id="5WEX">
    <property type="method" value="X-ray"/>
    <property type="resolution" value="1.26 A"/>
    <property type="chains" value="A=1-260"/>
</dbReference>
<dbReference type="PDB" id="5WG7">
    <property type="method" value="X-ray"/>
    <property type="resolution" value="1.45 A"/>
    <property type="chains" value="A=4-260"/>
</dbReference>
<dbReference type="PDB" id="5WGP">
    <property type="method" value="X-ray"/>
    <property type="resolution" value="1.53 A"/>
    <property type="chains" value="A=4-260"/>
</dbReference>
<dbReference type="PDB" id="5WLR">
    <property type="method" value="X-ray"/>
    <property type="resolution" value="1.49 A"/>
    <property type="chains" value="A=4-260"/>
</dbReference>
<dbReference type="PDB" id="5WLT">
    <property type="method" value="X-ray"/>
    <property type="resolution" value="1.57 A"/>
    <property type="chains" value="A=4-260"/>
</dbReference>
<dbReference type="PDB" id="5WLU">
    <property type="method" value="X-ray"/>
    <property type="resolution" value="1.39 A"/>
    <property type="chains" value="A=4-260"/>
</dbReference>
<dbReference type="PDB" id="5WLV">
    <property type="method" value="X-ray"/>
    <property type="resolution" value="1.40 A"/>
    <property type="chains" value="A=4-260"/>
</dbReference>
<dbReference type="PDB" id="5Y2R">
    <property type="method" value="X-ray"/>
    <property type="resolution" value="1.00 A"/>
    <property type="chains" value="A=1-260"/>
</dbReference>
<dbReference type="PDB" id="5Y2S">
    <property type="method" value="X-ray"/>
    <property type="resolution" value="0.90 A"/>
    <property type="chains" value="A=1-260"/>
</dbReference>
<dbReference type="PDB" id="5YUI">
    <property type="method" value="X-ray"/>
    <property type="resolution" value="1.20 A"/>
    <property type="chains" value="A=1-260"/>
</dbReference>
<dbReference type="PDB" id="5YUJ">
    <property type="method" value="X-ray"/>
    <property type="resolution" value="1.25 A"/>
    <property type="chains" value="A=1-260"/>
</dbReference>
<dbReference type="PDB" id="5YUK">
    <property type="method" value="X-ray"/>
    <property type="resolution" value="1.45 A"/>
    <property type="chains" value="A=1-260"/>
</dbReference>
<dbReference type="PDB" id="5ZXW">
    <property type="method" value="X-ray"/>
    <property type="resolution" value="1.32 A"/>
    <property type="chains" value="A=5-260"/>
</dbReference>
<dbReference type="PDB" id="6B4D">
    <property type="method" value="X-ray"/>
    <property type="resolution" value="1.20 A"/>
    <property type="chains" value="A=4-260"/>
</dbReference>
<dbReference type="PDB" id="6B59">
    <property type="method" value="X-ray"/>
    <property type="resolution" value="1.64 A"/>
    <property type="chains" value="A=4-260"/>
</dbReference>
<dbReference type="PDB" id="6B5A">
    <property type="method" value="X-ray"/>
    <property type="resolution" value="1.62 A"/>
    <property type="chains" value="A=4-260"/>
</dbReference>
<dbReference type="PDB" id="6BBS">
    <property type="method" value="Other"/>
    <property type="resolution" value="2.00 A"/>
    <property type="chains" value="A=1-260"/>
</dbReference>
<dbReference type="PDB" id="6BC9">
    <property type="method" value="Other"/>
    <property type="resolution" value="1.80 A"/>
    <property type="chains" value="A=1-260"/>
</dbReference>
<dbReference type="PDB" id="6BCC">
    <property type="method" value="Other"/>
    <property type="resolution" value="1.80 A"/>
    <property type="chains" value="A=1-260"/>
</dbReference>
<dbReference type="PDB" id="6C7W">
    <property type="method" value="X-ray"/>
    <property type="resolution" value="1.28 A"/>
    <property type="chains" value="A=1-260"/>
</dbReference>
<dbReference type="PDB" id="6C7X">
    <property type="method" value="X-ray"/>
    <property type="resolution" value="1.50 A"/>
    <property type="chains" value="A=1-260"/>
</dbReference>
<dbReference type="PDB" id="6CA2">
    <property type="method" value="X-ray"/>
    <property type="resolution" value="2.50 A"/>
    <property type="chains" value="A=1-260"/>
</dbReference>
<dbReference type="PDB" id="6CEH">
    <property type="method" value="X-ray"/>
    <property type="resolution" value="1.43 A"/>
    <property type="chains" value="A=2-260"/>
</dbReference>
<dbReference type="PDB" id="6CJV">
    <property type="method" value="X-ray"/>
    <property type="resolution" value="1.55 A"/>
    <property type="chains" value="A=4-260"/>
</dbReference>
<dbReference type="PDB" id="6D1L">
    <property type="method" value="X-ray"/>
    <property type="resolution" value="1.40 A"/>
    <property type="chains" value="A=1-260"/>
</dbReference>
<dbReference type="PDB" id="6D1M">
    <property type="method" value="X-ray"/>
    <property type="resolution" value="1.21 A"/>
    <property type="chains" value="A=1-260"/>
</dbReference>
<dbReference type="PDB" id="6E8P">
    <property type="method" value="X-ray"/>
    <property type="resolution" value="1.90 A"/>
    <property type="chains" value="A=4-260"/>
</dbReference>
<dbReference type="PDB" id="6E8X">
    <property type="method" value="X-ray"/>
    <property type="resolution" value="1.60 A"/>
    <property type="chains" value="A=4-260"/>
</dbReference>
<dbReference type="PDB" id="6E91">
    <property type="method" value="X-ray"/>
    <property type="resolution" value="1.80 A"/>
    <property type="chains" value="A=4-260"/>
</dbReference>
<dbReference type="PDB" id="6E92">
    <property type="method" value="X-ray"/>
    <property type="resolution" value="1.77 A"/>
    <property type="chains" value="A=4-260"/>
</dbReference>
<dbReference type="PDB" id="6EBE">
    <property type="method" value="X-ray"/>
    <property type="resolution" value="1.88 A"/>
    <property type="chains" value="A=4-260"/>
</dbReference>
<dbReference type="PDB" id="6ECZ">
    <property type="method" value="X-ray"/>
    <property type="resolution" value="2.21 A"/>
    <property type="chains" value="A=4-260"/>
</dbReference>
<dbReference type="PDB" id="6EDA">
    <property type="method" value="X-ray"/>
    <property type="resolution" value="1.88 A"/>
    <property type="chains" value="A=4-260"/>
</dbReference>
<dbReference type="PDB" id="6EEA">
    <property type="method" value="X-ray"/>
    <property type="resolution" value="1.63 A"/>
    <property type="chains" value="A=4-260"/>
</dbReference>
<dbReference type="PDB" id="6EEH">
    <property type="method" value="X-ray"/>
    <property type="resolution" value="1.63 A"/>
    <property type="chains" value="A=4-260"/>
</dbReference>
<dbReference type="PDB" id="6EEO">
    <property type="method" value="X-ray"/>
    <property type="resolution" value="1.72 A"/>
    <property type="chains" value="A=4-260"/>
</dbReference>
<dbReference type="PDB" id="6EQU">
    <property type="method" value="X-ray"/>
    <property type="resolution" value="1.65 A"/>
    <property type="chains" value="A=1-260"/>
</dbReference>
<dbReference type="PDB" id="6FJI">
    <property type="method" value="Other"/>
    <property type="resolution" value="1.60 A"/>
    <property type="chains" value="A=1-260"/>
</dbReference>
<dbReference type="PDB" id="6FJJ">
    <property type="method" value="Other"/>
    <property type="resolution" value="1.50 A"/>
    <property type="chains" value="A=1-260"/>
</dbReference>
<dbReference type="PDB" id="6G3Q">
    <property type="method" value="X-ray"/>
    <property type="resolution" value="1.01 A"/>
    <property type="chains" value="A=1-260"/>
</dbReference>
<dbReference type="PDB" id="6G6T">
    <property type="method" value="X-ray"/>
    <property type="resolution" value="1.12 A"/>
    <property type="chains" value="A=1-260"/>
</dbReference>
<dbReference type="PDB" id="6GCY">
    <property type="method" value="Other"/>
    <property type="resolution" value="1.30 A"/>
    <property type="chains" value="A=1-260"/>
</dbReference>
<dbReference type="PDB" id="6GDC">
    <property type="method" value="X-ray"/>
    <property type="resolution" value="1.08 A"/>
    <property type="chains" value="A=1-260"/>
</dbReference>
<dbReference type="PDB" id="6GM9">
    <property type="method" value="X-ray"/>
    <property type="resolution" value="1.09 A"/>
    <property type="chains" value="A=1-260"/>
</dbReference>
<dbReference type="PDB" id="6GOT">
    <property type="method" value="X-ray"/>
    <property type="resolution" value="1.56 A"/>
    <property type="chains" value="A=1-260"/>
</dbReference>
<dbReference type="PDB" id="6GXB">
    <property type="method" value="X-ray"/>
    <property type="resolution" value="1.35 A"/>
    <property type="chains" value="A=4-260"/>
</dbReference>
<dbReference type="PDB" id="6GXE">
    <property type="method" value="X-ray"/>
    <property type="resolution" value="1.30 A"/>
    <property type="chains" value="A=4-260"/>
</dbReference>
<dbReference type="PDB" id="6H29">
    <property type="method" value="X-ray"/>
    <property type="resolution" value="1.46 A"/>
    <property type="chains" value="A=1-260"/>
</dbReference>
<dbReference type="PDB" id="6H2Z">
    <property type="method" value="X-ray"/>
    <property type="resolution" value="1.94 A"/>
    <property type="chains" value="A=1-260"/>
</dbReference>
<dbReference type="PDB" id="6H33">
    <property type="method" value="X-ray"/>
    <property type="resolution" value="1.58 A"/>
    <property type="chains" value="A=1-260"/>
</dbReference>
<dbReference type="PDB" id="6H34">
    <property type="method" value="X-ray"/>
    <property type="resolution" value="1.55 A"/>
    <property type="chains" value="A=1-260"/>
</dbReference>
<dbReference type="PDB" id="6H3Q">
    <property type="method" value="X-ray"/>
    <property type="resolution" value="1.31 A"/>
    <property type="chains" value="A=1-260"/>
</dbReference>
<dbReference type="PDB" id="6H6S">
    <property type="method" value="X-ray"/>
    <property type="resolution" value="1.45 A"/>
    <property type="chains" value="A/B=2-260"/>
</dbReference>
<dbReference type="PDB" id="6HD2">
    <property type="method" value="NMR"/>
    <property type="chains" value="A=1-260"/>
</dbReference>
<dbReference type="PDB" id="6HQX">
    <property type="method" value="X-ray"/>
    <property type="resolution" value="1.10 A"/>
    <property type="chains" value="A=1-260"/>
</dbReference>
<dbReference type="PDB" id="6HR3">
    <property type="method" value="X-ray"/>
    <property type="resolution" value="1.02 A"/>
    <property type="chains" value="A=1-260"/>
</dbReference>
<dbReference type="PDB" id="6HX5">
    <property type="method" value="X-ray"/>
    <property type="resolution" value="1.44 A"/>
    <property type="chains" value="A=1-260"/>
</dbReference>
<dbReference type="PDB" id="6HXD">
    <property type="method" value="X-ray"/>
    <property type="resolution" value="1.12 A"/>
    <property type="chains" value="A=1-260"/>
</dbReference>
<dbReference type="PDB" id="6HZX">
    <property type="method" value="X-ray"/>
    <property type="resolution" value="2.91 A"/>
    <property type="chains" value="A/B=4-260"/>
</dbReference>
<dbReference type="PDB" id="6I0W">
    <property type="method" value="X-ray"/>
    <property type="resolution" value="1.04 A"/>
    <property type="chains" value="A=1-260"/>
</dbReference>
<dbReference type="PDB" id="6I1U">
    <property type="method" value="X-ray"/>
    <property type="resolution" value="1.08 A"/>
    <property type="chains" value="A=1-260"/>
</dbReference>
<dbReference type="PDB" id="6I2F">
    <property type="method" value="X-ray"/>
    <property type="resolution" value="1.20 A"/>
    <property type="chains" value="A=1-260"/>
</dbReference>
<dbReference type="PDB" id="6I3E">
    <property type="method" value="X-ray"/>
    <property type="resolution" value="1.07 A"/>
    <property type="chains" value="A=1-260"/>
</dbReference>
<dbReference type="PDB" id="6IC2">
    <property type="method" value="X-ray"/>
    <property type="resolution" value="1.15 A"/>
    <property type="chains" value="A=1-260"/>
</dbReference>
<dbReference type="PDB" id="6KLZ">
    <property type="method" value="X-ray"/>
    <property type="resolution" value="0.90 A"/>
    <property type="chains" value="A=1-260"/>
</dbReference>
<dbReference type="PDB" id="6KM0">
    <property type="method" value="X-ray"/>
    <property type="resolution" value="0.93 A"/>
    <property type="chains" value="A=1-260"/>
</dbReference>
<dbReference type="PDB" id="6KM1">
    <property type="method" value="X-ray"/>
    <property type="resolution" value="1.05 A"/>
    <property type="chains" value="A=1-260"/>
</dbReference>
<dbReference type="PDB" id="6KM2">
    <property type="method" value="X-ray"/>
    <property type="resolution" value="0.90 A"/>
    <property type="chains" value="A=1-260"/>
</dbReference>
<dbReference type="PDB" id="6KM3">
    <property type="method" value="X-ray"/>
    <property type="resolution" value="1.15 A"/>
    <property type="chains" value="A=1-260"/>
</dbReference>
<dbReference type="PDB" id="6KM4">
    <property type="method" value="X-ray"/>
    <property type="resolution" value="1.15 A"/>
    <property type="chains" value="A=1-260"/>
</dbReference>
<dbReference type="PDB" id="6KM5">
    <property type="method" value="X-ray"/>
    <property type="resolution" value="1.15 A"/>
    <property type="chains" value="A=1-260"/>
</dbReference>
<dbReference type="PDB" id="6KM6">
    <property type="method" value="X-ray"/>
    <property type="resolution" value="1.15 A"/>
    <property type="chains" value="A=1-260"/>
</dbReference>
<dbReference type="PDB" id="6LUU">
    <property type="method" value="X-ray"/>
    <property type="resolution" value="1.20 A"/>
    <property type="chains" value="A=1-260"/>
</dbReference>
<dbReference type="PDB" id="6LUV">
    <property type="method" value="X-ray"/>
    <property type="resolution" value="1.20 A"/>
    <property type="chains" value="A=1-260"/>
</dbReference>
<dbReference type="PDB" id="6LUW">
    <property type="method" value="X-ray"/>
    <property type="resolution" value="1.20 A"/>
    <property type="chains" value="A=1-260"/>
</dbReference>
<dbReference type="PDB" id="6LUX">
    <property type="method" value="X-ray"/>
    <property type="resolution" value="1.20 A"/>
    <property type="chains" value="A=1-260"/>
</dbReference>
<dbReference type="PDB" id="6LUY">
    <property type="method" value="X-ray"/>
    <property type="resolution" value="1.20 A"/>
    <property type="chains" value="A=1-260"/>
</dbReference>
<dbReference type="PDB" id="6LUZ">
    <property type="method" value="X-ray"/>
    <property type="resolution" value="1.20 A"/>
    <property type="chains" value="A=1-260"/>
</dbReference>
<dbReference type="PDB" id="6LV1">
    <property type="method" value="X-ray"/>
    <property type="resolution" value="1.20 A"/>
    <property type="chains" value="A=1-260"/>
</dbReference>
<dbReference type="PDB" id="6LV2">
    <property type="method" value="X-ray"/>
    <property type="resolution" value="1.20 A"/>
    <property type="chains" value="A=1-260"/>
</dbReference>
<dbReference type="PDB" id="6LV3">
    <property type="method" value="X-ray"/>
    <property type="resolution" value="1.20 A"/>
    <property type="chains" value="A=1-260"/>
</dbReference>
<dbReference type="PDB" id="6LV4">
    <property type="method" value="X-ray"/>
    <property type="resolution" value="1.20 A"/>
    <property type="chains" value="A=1-260"/>
</dbReference>
<dbReference type="PDB" id="6LV5">
    <property type="method" value="X-ray"/>
    <property type="resolution" value="1.20 A"/>
    <property type="chains" value="A=1-260"/>
</dbReference>
<dbReference type="PDB" id="6LV6">
    <property type="method" value="X-ray"/>
    <property type="resolution" value="1.20 A"/>
    <property type="chains" value="A=1-260"/>
</dbReference>
<dbReference type="PDB" id="6LV7">
    <property type="method" value="X-ray"/>
    <property type="resolution" value="1.20 A"/>
    <property type="chains" value="A=1-260"/>
</dbReference>
<dbReference type="PDB" id="6LV8">
    <property type="method" value="X-ray"/>
    <property type="resolution" value="1.20 A"/>
    <property type="chains" value="A=1-260"/>
</dbReference>
<dbReference type="PDB" id="6LV9">
    <property type="method" value="X-ray"/>
    <property type="resolution" value="1.20 A"/>
    <property type="chains" value="A=1-260"/>
</dbReference>
<dbReference type="PDB" id="6LVA">
    <property type="method" value="X-ray"/>
    <property type="resolution" value="1.20 A"/>
    <property type="chains" value="A=1-260"/>
</dbReference>
<dbReference type="PDB" id="6MBV">
    <property type="method" value="X-ray"/>
    <property type="resolution" value="1.70 A"/>
    <property type="chains" value="A=4-260"/>
</dbReference>
<dbReference type="PDB" id="6MBY">
    <property type="method" value="X-ray"/>
    <property type="resolution" value="1.50 A"/>
    <property type="chains" value="A=4-260"/>
</dbReference>
<dbReference type="PDB" id="6NLV">
    <property type="method" value="X-ray"/>
    <property type="resolution" value="1.79 A"/>
    <property type="chains" value="A=4-260"/>
</dbReference>
<dbReference type="PDB" id="6NM0">
    <property type="method" value="X-ray"/>
    <property type="resolution" value="1.44 A"/>
    <property type="chains" value="A=4-260"/>
</dbReference>
<dbReference type="PDB" id="6ODZ">
    <property type="method" value="X-ray"/>
    <property type="resolution" value="1.30 A"/>
    <property type="chains" value="A=1-260"/>
</dbReference>
<dbReference type="PDB" id="6OE0">
    <property type="method" value="X-ray"/>
    <property type="resolution" value="1.30 A"/>
    <property type="chains" value="A=1-260"/>
</dbReference>
<dbReference type="PDB" id="6OE1">
    <property type="method" value="X-ray"/>
    <property type="resolution" value="1.45 A"/>
    <property type="chains" value="A=1-260"/>
</dbReference>
<dbReference type="PDB" id="6OTI">
    <property type="method" value="X-ray"/>
    <property type="resolution" value="2.00 A"/>
    <property type="chains" value="A=4-260"/>
</dbReference>
<dbReference type="PDB" id="6OTK">
    <property type="method" value="X-ray"/>
    <property type="resolution" value="1.12 A"/>
    <property type="chains" value="A=4-260"/>
</dbReference>
<dbReference type="PDB" id="6OTM">
    <property type="method" value="X-ray"/>
    <property type="resolution" value="1.31 A"/>
    <property type="chains" value="A=4-260"/>
</dbReference>
<dbReference type="PDB" id="6OTO">
    <property type="method" value="X-ray"/>
    <property type="resolution" value="1.50 A"/>
    <property type="chains" value="A=1-260"/>
</dbReference>
<dbReference type="PDB" id="6OTP">
    <property type="method" value="X-ray"/>
    <property type="resolution" value="1.47 A"/>
    <property type="chains" value="A=4-260"/>
</dbReference>
<dbReference type="PDB" id="6OTQ">
    <property type="method" value="X-ray"/>
    <property type="resolution" value="1.47 A"/>
    <property type="chains" value="A=4-260"/>
</dbReference>
<dbReference type="PDB" id="6OUB">
    <property type="method" value="X-ray"/>
    <property type="resolution" value="1.42 A"/>
    <property type="chains" value="A=4-260"/>
</dbReference>
<dbReference type="PDB" id="6OUD">
    <property type="method" value="X-ray"/>
    <property type="resolution" value="1.26 A"/>
    <property type="chains" value="A=4-260"/>
</dbReference>
<dbReference type="PDB" id="6OUE">
    <property type="method" value="X-ray"/>
    <property type="resolution" value="1.42 A"/>
    <property type="chains" value="A=4-260"/>
</dbReference>
<dbReference type="PDB" id="6OUF">
    <property type="method" value="X-ray"/>
    <property type="resolution" value="1.36 A"/>
    <property type="chains" value="A=4-260"/>
</dbReference>
<dbReference type="PDB" id="6OUH">
    <property type="method" value="X-ray"/>
    <property type="resolution" value="1.45 A"/>
    <property type="chains" value="A=4-260"/>
</dbReference>
<dbReference type="PDB" id="6OUI">
    <property type="method" value="X-ray"/>
    <property type="resolution" value="1.53 A"/>
    <property type="chains" value="A=4-260"/>
</dbReference>
<dbReference type="PDB" id="6OUJ">
    <property type="method" value="X-ray"/>
    <property type="resolution" value="1.47 A"/>
    <property type="chains" value="A=4-260"/>
</dbReference>
<dbReference type="PDB" id="6OUK">
    <property type="method" value="X-ray"/>
    <property type="resolution" value="1.50 A"/>
    <property type="chains" value="A=4-260"/>
</dbReference>
<dbReference type="PDB" id="6OUM">
    <property type="method" value="X-ray"/>
    <property type="resolution" value="1.56 A"/>
    <property type="chains" value="A=4-260"/>
</dbReference>
<dbReference type="PDB" id="6PDV">
    <property type="method" value="X-ray"/>
    <property type="resolution" value="1.23 A"/>
    <property type="chains" value="A=1-260"/>
</dbReference>
<dbReference type="PDB" id="6PEA">
    <property type="method" value="X-ray"/>
    <property type="resolution" value="1.36 A"/>
    <property type="chains" value="A=1-260"/>
</dbReference>
<dbReference type="PDB" id="6PGX">
    <property type="method" value="X-ray"/>
    <property type="resolution" value="1.36 A"/>
    <property type="chains" value="A=1-260"/>
</dbReference>
<dbReference type="PDB" id="6Q3O">
    <property type="method" value="X-ray"/>
    <property type="resolution" value="2.23 A"/>
    <property type="chains" value="A/B/C/D=2-260"/>
</dbReference>
<dbReference type="PDB" id="6Q9T">
    <property type="method" value="X-ray"/>
    <property type="resolution" value="2.68 A"/>
    <property type="chains" value="A=2-260"/>
</dbReference>
<dbReference type="PDB" id="6QEB">
    <property type="method" value="NMR"/>
    <property type="chains" value="A=1-260"/>
</dbReference>
<dbReference type="PDB" id="6QL1">
    <property type="method" value="X-ray"/>
    <property type="resolution" value="1.42 A"/>
    <property type="chains" value="A=1-260"/>
</dbReference>
<dbReference type="PDB" id="6QL2">
    <property type="method" value="X-ray"/>
    <property type="resolution" value="1.30 A"/>
    <property type="chains" value="A=1-260"/>
</dbReference>
<dbReference type="PDB" id="6QL3">
    <property type="method" value="X-ray"/>
    <property type="resolution" value="1.35 A"/>
    <property type="chains" value="A=1-260"/>
</dbReference>
<dbReference type="PDB" id="6R6F">
    <property type="method" value="X-ray"/>
    <property type="resolution" value="1.20 A"/>
    <property type="chains" value="A=1-260"/>
</dbReference>
<dbReference type="PDB" id="6R6J">
    <property type="method" value="X-ray"/>
    <property type="resolution" value="1.55 A"/>
    <property type="chains" value="A=1-260"/>
</dbReference>
<dbReference type="PDB" id="6RFH">
    <property type="method" value="X-ray"/>
    <property type="resolution" value="0.97 A"/>
    <property type="chains" value="A=1-260"/>
</dbReference>
<dbReference type="PDB" id="6RG3">
    <property type="method" value="X-ray"/>
    <property type="resolution" value="1.32 A"/>
    <property type="chains" value="A=1-260"/>
</dbReference>
<dbReference type="PDB" id="6RG4">
    <property type="method" value="X-ray"/>
    <property type="resolution" value="1.25 A"/>
    <property type="chains" value="A=1-260"/>
</dbReference>
<dbReference type="PDB" id="6RG5">
    <property type="method" value="X-ray"/>
    <property type="resolution" value="1.09 A"/>
    <property type="chains" value="A=1-260"/>
</dbReference>
<dbReference type="PDB" id="6RH4">
    <property type="method" value="X-ray"/>
    <property type="resolution" value="0.95 A"/>
    <property type="chains" value="A=1-260"/>
</dbReference>
<dbReference type="PDB" id="6RHJ">
    <property type="method" value="X-ray"/>
    <property type="resolution" value="1.44 A"/>
    <property type="chains" value="A=1-260"/>
</dbReference>
<dbReference type="PDB" id="6RHK">
    <property type="method" value="X-ray"/>
    <property type="resolution" value="1.44 A"/>
    <property type="chains" value="A=1-260"/>
</dbReference>
<dbReference type="PDB" id="6RIG">
    <property type="method" value="X-ray"/>
    <property type="resolution" value="1.00 A"/>
    <property type="chains" value="A=1-260"/>
</dbReference>
<dbReference type="PDB" id="6RIT">
    <property type="method" value="X-ray"/>
    <property type="resolution" value="1.01 A"/>
    <property type="chains" value="A=1-260"/>
</dbReference>
<dbReference type="PDB" id="6RJJ">
    <property type="method" value="X-ray"/>
    <property type="resolution" value="1.06 A"/>
    <property type="chains" value="A=1-260"/>
</dbReference>
<dbReference type="PDB" id="6RKN">
    <property type="method" value="X-ray"/>
    <property type="resolution" value="0.96 A"/>
    <property type="chains" value="A=1-260"/>
</dbReference>
<dbReference type="PDB" id="6RL9">
    <property type="method" value="X-ray"/>
    <property type="resolution" value="1.00 A"/>
    <property type="chains" value="A=1-260"/>
</dbReference>
<dbReference type="PDB" id="6RM1">
    <property type="method" value="X-ray"/>
    <property type="resolution" value="1.68 A"/>
    <property type="chains" value="A=1-260"/>
</dbReference>
<dbReference type="PDB" id="6RMP">
    <property type="method" value="X-ray"/>
    <property type="resolution" value="1.22 A"/>
    <property type="chains" value="A=1-260"/>
</dbReference>
<dbReference type="PDB" id="6RMX">
    <property type="method" value="X-ray"/>
    <property type="resolution" value="1.60 A"/>
    <property type="chains" value="A=4-260"/>
</dbReference>
<dbReference type="PDB" id="6RMY">
    <property type="method" value="X-ray"/>
    <property type="resolution" value="1.50 A"/>
    <property type="chains" value="A=1-260"/>
</dbReference>
<dbReference type="PDB" id="6RNP">
    <property type="method" value="X-ray"/>
    <property type="resolution" value="1.07 A"/>
    <property type="chains" value="A=1-260"/>
</dbReference>
<dbReference type="PDB" id="6ROB">
    <property type="method" value="X-ray"/>
    <property type="resolution" value="0.93 A"/>
    <property type="chains" value="A=1-260"/>
</dbReference>
<dbReference type="PDB" id="6ROE">
    <property type="method" value="X-ray"/>
    <property type="resolution" value="0.94 A"/>
    <property type="chains" value="A=1-260"/>
</dbReference>
<dbReference type="PDB" id="6ROF">
    <property type="method" value="X-ray"/>
    <property type="resolution" value="1.50 A"/>
    <property type="chains" value="A=1-260"/>
</dbReference>
<dbReference type="PDB" id="6RQI">
    <property type="method" value="X-ray"/>
    <property type="resolution" value="0.95 A"/>
    <property type="chains" value="A=1-260"/>
</dbReference>
<dbReference type="PDB" id="6RRG">
    <property type="method" value="X-ray"/>
    <property type="resolution" value="1.13 A"/>
    <property type="chains" value="A=1-260"/>
</dbReference>
<dbReference type="PDB" id="6RRI">
    <property type="method" value="X-ray"/>
    <property type="resolution" value="1.10 A"/>
    <property type="chains" value="A=1-260"/>
</dbReference>
<dbReference type="PDB" id="6RS5">
    <property type="method" value="X-ray"/>
    <property type="resolution" value="1.07 A"/>
    <property type="chains" value="A=1-260"/>
</dbReference>
<dbReference type="PDB" id="6RSZ">
    <property type="method" value="X-ray"/>
    <property type="resolution" value="1.09 A"/>
    <property type="chains" value="A=1-260"/>
</dbReference>
<dbReference type="PDB" id="6RVF">
    <property type="method" value="X-ray"/>
    <property type="resolution" value="2.07 A"/>
    <property type="chains" value="A=1-260"/>
</dbReference>
<dbReference type="PDB" id="6RVK">
    <property type="method" value="X-ray"/>
    <property type="resolution" value="1.58 A"/>
    <property type="chains" value="A=1-260"/>
</dbReference>
<dbReference type="PDB" id="6RVL">
    <property type="method" value="X-ray"/>
    <property type="resolution" value="1.72 A"/>
    <property type="chains" value="A=1-260"/>
</dbReference>
<dbReference type="PDB" id="6RW1">
    <property type="method" value="X-ray"/>
    <property type="resolution" value="1.70 A"/>
    <property type="chains" value="A=1-260"/>
</dbReference>
<dbReference type="PDB" id="6RZX">
    <property type="method" value="X-ray"/>
    <property type="resolution" value="1.00 A"/>
    <property type="chains" value="A=1-260"/>
</dbReference>
<dbReference type="PDB" id="6S03">
    <property type="method" value="X-ray"/>
    <property type="resolution" value="1.38 A"/>
    <property type="chains" value="A=1-260"/>
</dbReference>
<dbReference type="PDB" id="6S9G">
    <property type="method" value="X-ray"/>
    <property type="resolution" value="1.14 A"/>
    <property type="chains" value="A=1-260"/>
</dbReference>
<dbReference type="PDB" id="6S9Z">
    <property type="method" value="X-ray"/>
    <property type="resolution" value="0.95 A"/>
    <property type="chains" value="A=1-260"/>
</dbReference>
<dbReference type="PDB" id="6SAC">
    <property type="method" value="X-ray"/>
    <property type="resolution" value="1.02 A"/>
    <property type="chains" value="A=1-260"/>
</dbReference>
<dbReference type="PDB" id="6SAS">
    <property type="method" value="X-ray"/>
    <property type="resolution" value="1.10 A"/>
    <property type="chains" value="A=1-260"/>
</dbReference>
<dbReference type="PDB" id="6SAY">
    <property type="method" value="X-ray"/>
    <property type="resolution" value="0.95 A"/>
    <property type="chains" value="A=1-260"/>
</dbReference>
<dbReference type="PDB" id="6SB7">
    <property type="method" value="X-ray"/>
    <property type="resolution" value="1.09 A"/>
    <property type="chains" value="A=1-260"/>
</dbReference>
<dbReference type="PDB" id="6SBH">
    <property type="method" value="X-ray"/>
    <property type="resolution" value="0.95 A"/>
    <property type="chains" value="A=1-260"/>
</dbReference>
<dbReference type="PDB" id="6SBL">
    <property type="method" value="X-ray"/>
    <property type="resolution" value="0.94 A"/>
    <property type="chains" value="A=1-260"/>
</dbReference>
<dbReference type="PDB" id="6SBM">
    <property type="method" value="X-ray"/>
    <property type="resolution" value="0.95 A"/>
    <property type="chains" value="A=1-260"/>
</dbReference>
<dbReference type="PDB" id="6SD7">
    <property type="method" value="X-ray"/>
    <property type="resolution" value="1.05 A"/>
    <property type="chains" value="A=1-260"/>
</dbReference>
<dbReference type="PDB" id="6SDH">
    <property type="method" value="X-ray"/>
    <property type="resolution" value="1.04 A"/>
    <property type="chains" value="A=1-260"/>
</dbReference>
<dbReference type="PDB" id="6SDI">
    <property type="method" value="X-ray"/>
    <property type="resolution" value="1.03 A"/>
    <property type="chains" value="A=1-260"/>
</dbReference>
<dbReference type="PDB" id="6SDJ">
    <property type="method" value="X-ray"/>
    <property type="resolution" value="1.02 A"/>
    <property type="chains" value="A=1-260"/>
</dbReference>
<dbReference type="PDB" id="6SDL">
    <property type="method" value="X-ray"/>
    <property type="resolution" value="1.08 A"/>
    <property type="chains" value="A=1-260"/>
</dbReference>
<dbReference type="PDB" id="6SDS">
    <property type="method" value="X-ray"/>
    <property type="resolution" value="1.26 A"/>
    <property type="chains" value="A=1-260"/>
</dbReference>
<dbReference type="PDB" id="6SEY">
    <property type="method" value="X-ray"/>
    <property type="resolution" value="1.23 A"/>
    <property type="chains" value="A=1-260"/>
</dbReference>
<dbReference type="PDB" id="6SFQ">
    <property type="method" value="X-ray"/>
    <property type="resolution" value="1.00 A"/>
    <property type="chains" value="A=1-260"/>
</dbReference>
<dbReference type="PDB" id="6SFU">
    <property type="method" value="X-ray"/>
    <property type="resolution" value="1.04 A"/>
    <property type="chains" value="A=1-260"/>
</dbReference>
<dbReference type="PDB" id="6SG0">
    <property type="method" value="X-ray"/>
    <property type="resolution" value="1.13 A"/>
    <property type="chains" value="A=1-260"/>
</dbReference>
<dbReference type="PDB" id="6SG6">
    <property type="method" value="X-ray"/>
    <property type="resolution" value="0.98 A"/>
    <property type="chains" value="A=1-260"/>
</dbReference>
<dbReference type="PDB" id="6SX9">
    <property type="method" value="X-ray"/>
    <property type="resolution" value="1.43 A"/>
    <property type="chains" value="A=1-260"/>
</dbReference>
<dbReference type="PDB" id="6SYB">
    <property type="method" value="X-ray"/>
    <property type="resolution" value="1.60 A"/>
    <property type="chains" value="A=1-260"/>
</dbReference>
<dbReference type="PDB" id="6SYS">
    <property type="method" value="X-ray"/>
    <property type="resolution" value="1.30 A"/>
    <property type="chains" value="A=1-260"/>
</dbReference>
<dbReference type="PDB" id="6T4N">
    <property type="method" value="X-ray"/>
    <property type="resolution" value="1.40 A"/>
    <property type="chains" value="A=1-260"/>
</dbReference>
<dbReference type="PDB" id="6T4O">
    <property type="method" value="X-ray"/>
    <property type="resolution" value="1.13 A"/>
    <property type="chains" value="A=1-260"/>
</dbReference>
<dbReference type="PDB" id="6T4P">
    <property type="method" value="X-ray"/>
    <property type="resolution" value="1.75 A"/>
    <property type="chains" value="A=1-260"/>
</dbReference>
<dbReference type="PDB" id="6T5C">
    <property type="method" value="X-ray"/>
    <property type="resolution" value="1.22 A"/>
    <property type="chains" value="A=1-260"/>
</dbReference>
<dbReference type="PDB" id="6T7U">
    <property type="method" value="X-ray"/>
    <property type="resolution" value="1.20 A"/>
    <property type="chains" value="A=1-260"/>
</dbReference>
<dbReference type="PDB" id="6T81">
    <property type="method" value="X-ray"/>
    <property type="resolution" value="0.98 A"/>
    <property type="chains" value="A=1-260"/>
</dbReference>
<dbReference type="PDB" id="6T9Z">
    <property type="method" value="X-ray"/>
    <property type="resolution" value="1.12 A"/>
    <property type="chains" value="A=1-260"/>
</dbReference>
<dbReference type="PDB" id="6U4Q">
    <property type="method" value="X-ray"/>
    <property type="resolution" value="1.31 A"/>
    <property type="chains" value="A=4-260"/>
</dbReference>
<dbReference type="PDB" id="6U4T">
    <property type="method" value="X-ray"/>
    <property type="resolution" value="1.36 A"/>
    <property type="chains" value="A=4-260"/>
</dbReference>
<dbReference type="PDB" id="6UFB">
    <property type="method" value="X-ray"/>
    <property type="resolution" value="1.67 A"/>
    <property type="chains" value="A=1-260"/>
</dbReference>
<dbReference type="PDB" id="6UFC">
    <property type="method" value="X-ray"/>
    <property type="resolution" value="1.32 A"/>
    <property type="chains" value="A=1-260"/>
</dbReference>
<dbReference type="PDB" id="6UFD">
    <property type="method" value="X-ray"/>
    <property type="resolution" value="1.48 A"/>
    <property type="chains" value="A=1-260"/>
</dbReference>
<dbReference type="PDB" id="6UGN">
    <property type="method" value="X-ray"/>
    <property type="resolution" value="1.41 A"/>
    <property type="chains" value="A=4-260"/>
</dbReference>
<dbReference type="PDB" id="6UGO">
    <property type="method" value="X-ray"/>
    <property type="resolution" value="1.46 A"/>
    <property type="chains" value="A=4-260"/>
</dbReference>
<dbReference type="PDB" id="6UGP">
    <property type="method" value="X-ray"/>
    <property type="resolution" value="1.31 A"/>
    <property type="chains" value="A=4-260"/>
</dbReference>
<dbReference type="PDB" id="6UGQ">
    <property type="method" value="X-ray"/>
    <property type="resolution" value="1.30 A"/>
    <property type="chains" value="A=4-260"/>
</dbReference>
<dbReference type="PDB" id="6UGR">
    <property type="method" value="X-ray"/>
    <property type="resolution" value="1.31 A"/>
    <property type="chains" value="A=4-260"/>
</dbReference>
<dbReference type="PDB" id="6UGZ">
    <property type="method" value="X-ray"/>
    <property type="resolution" value="1.31 A"/>
    <property type="chains" value="A=4-260"/>
</dbReference>
<dbReference type="PDB" id="6UH0">
    <property type="method" value="X-ray"/>
    <property type="resolution" value="1.31 A"/>
    <property type="chains" value="A=4-260"/>
</dbReference>
<dbReference type="PDB" id="6UX1">
    <property type="method" value="X-ray"/>
    <property type="resolution" value="1.36 A"/>
    <property type="chains" value="A=1-260"/>
</dbReference>
<dbReference type="PDB" id="6UZU">
    <property type="method" value="X-ray"/>
    <property type="resolution" value="1.50 A"/>
    <property type="chains" value="A=4-260"/>
</dbReference>
<dbReference type="PDB" id="6VJ3">
    <property type="method" value="X-ray"/>
    <property type="resolution" value="1.35 A"/>
    <property type="chains" value="A=3-260"/>
</dbReference>
<dbReference type="PDB" id="6VKG">
    <property type="method" value="X-ray"/>
    <property type="resolution" value="1.37 A"/>
    <property type="chains" value="A=1-260"/>
</dbReference>
<dbReference type="PDB" id="6WKA">
    <property type="method" value="X-ray"/>
    <property type="resolution" value="1.34 A"/>
    <property type="chains" value="A=1-260"/>
</dbReference>
<dbReference type="PDB" id="6WQ4">
    <property type="method" value="X-ray"/>
    <property type="resolution" value="1.35 A"/>
    <property type="chains" value="A=1-260"/>
</dbReference>
<dbReference type="PDB" id="6WQ5">
    <property type="method" value="X-ray"/>
    <property type="resolution" value="1.30 A"/>
    <property type="chains" value="A=1-260"/>
</dbReference>
<dbReference type="PDB" id="6WQ7">
    <property type="method" value="X-ray"/>
    <property type="resolution" value="1.30 A"/>
    <property type="chains" value="A=1-260"/>
</dbReference>
<dbReference type="PDB" id="6WQ8">
    <property type="method" value="X-ray"/>
    <property type="resolution" value="1.41 A"/>
    <property type="chains" value="A=1-260"/>
</dbReference>
<dbReference type="PDB" id="6WQ9">
    <property type="method" value="X-ray"/>
    <property type="resolution" value="1.30 A"/>
    <property type="chains" value="A=1-260"/>
</dbReference>
<dbReference type="PDB" id="6XVH">
    <property type="method" value="X-ray"/>
    <property type="resolution" value="1.80 A"/>
    <property type="chains" value="A=4-260"/>
</dbReference>
<dbReference type="PDB" id="6XWZ">
    <property type="method" value="X-ray"/>
    <property type="resolution" value="1.38 A"/>
    <property type="chains" value="AAA=1-260"/>
</dbReference>
<dbReference type="PDB" id="6XXT">
    <property type="method" value="X-ray"/>
    <property type="resolution" value="1.05 A"/>
    <property type="chains" value="X=1-260"/>
</dbReference>
<dbReference type="PDB" id="6YH4">
    <property type="method" value="X-ray"/>
    <property type="resolution" value="1.30 A"/>
    <property type="chains" value="A=1-260"/>
</dbReference>
<dbReference type="PDB" id="6YH5">
    <property type="method" value="X-ray"/>
    <property type="resolution" value="1.20 A"/>
    <property type="chains" value="A=1-260"/>
</dbReference>
<dbReference type="PDB" id="6YH6">
    <property type="method" value="X-ray"/>
    <property type="resolution" value="1.40 A"/>
    <property type="chains" value="A=1-260"/>
</dbReference>
<dbReference type="PDB" id="6YH7">
    <property type="method" value="X-ray"/>
    <property type="resolution" value="1.12 A"/>
    <property type="chains" value="A=1-260"/>
</dbReference>
<dbReference type="PDB" id="6YH8">
    <property type="method" value="X-ray"/>
    <property type="resolution" value="1.20 A"/>
    <property type="chains" value="A=1-260"/>
</dbReference>
<dbReference type="PDB" id="6YH9">
    <property type="method" value="X-ray"/>
    <property type="resolution" value="1.55 A"/>
    <property type="chains" value="A=1-260"/>
</dbReference>
<dbReference type="PDB" id="6YHA">
    <property type="method" value="X-ray"/>
    <property type="resolution" value="1.25 A"/>
    <property type="chains" value="A=1-260"/>
</dbReference>
<dbReference type="PDB" id="6YHB">
    <property type="method" value="X-ray"/>
    <property type="resolution" value="1.65 A"/>
    <property type="chains" value="A=1-260"/>
</dbReference>
<dbReference type="PDB" id="6YHC">
    <property type="method" value="X-ray"/>
    <property type="resolution" value="1.28 A"/>
    <property type="chains" value="A=1-260"/>
</dbReference>
<dbReference type="PDB" id="6YJ3">
    <property type="method" value="X-ray"/>
    <property type="resolution" value="1.55 A"/>
    <property type="chains" value="A=1-260"/>
</dbReference>
<dbReference type="PDB" id="6YKC">
    <property type="method" value="X-ray"/>
    <property type="resolution" value="1.20 A"/>
    <property type="chains" value="A=1-260"/>
</dbReference>
<dbReference type="PDB" id="6YKH">
    <property type="method" value="X-ray"/>
    <property type="resolution" value="1.10 A"/>
    <property type="chains" value="A=1-260"/>
</dbReference>
<dbReference type="PDB" id="6YMA">
    <property type="method" value="EM"/>
    <property type="resolution" value="2.50 A"/>
    <property type="chains" value="A=1-260"/>
</dbReference>
<dbReference type="PDB" id="6YMB">
    <property type="method" value="EM"/>
    <property type="resolution" value="2.50 A"/>
    <property type="chains" value="A=1-260"/>
</dbReference>
<dbReference type="PDB" id="6YO2">
    <property type="method" value="X-ray"/>
    <property type="resolution" value="1.20 A"/>
    <property type="chains" value="A=1-260"/>
</dbReference>
<dbReference type="PDB" id="6YO4">
    <property type="method" value="X-ray"/>
    <property type="resolution" value="1.70 A"/>
    <property type="chains" value="A=1-260"/>
</dbReference>
<dbReference type="PDB" id="6YO7">
    <property type="method" value="X-ray"/>
    <property type="resolution" value="1.17 A"/>
    <property type="chains" value="A=1-260"/>
</dbReference>
<dbReference type="PDB" id="6YOI">
    <property type="method" value="X-ray"/>
    <property type="resolution" value="1.20 A"/>
    <property type="chains" value="A=1-260"/>
</dbReference>
<dbReference type="PDB" id="6YOK">
    <property type="method" value="X-ray"/>
    <property type="resolution" value="1.25 A"/>
    <property type="chains" value="A=1-260"/>
</dbReference>
<dbReference type="PDB" id="6YOL">
    <property type="method" value="X-ray"/>
    <property type="resolution" value="1.15 A"/>
    <property type="chains" value="A=1-260"/>
</dbReference>
<dbReference type="PDB" id="6YPW">
    <property type="method" value="X-ray"/>
    <property type="resolution" value="1.10 A"/>
    <property type="chains" value="A=1-260"/>
</dbReference>
<dbReference type="PDB" id="6YQT">
    <property type="method" value="X-ray"/>
    <property type="resolution" value="1.50 A"/>
    <property type="chains" value="A=1-260"/>
</dbReference>
<dbReference type="PDB" id="6YQU">
    <property type="method" value="X-ray"/>
    <property type="resolution" value="1.48 A"/>
    <property type="chains" value="A=1-260"/>
</dbReference>
<dbReference type="PDB" id="6YRI">
    <property type="method" value="X-ray"/>
    <property type="resolution" value="1.60 A"/>
    <property type="chains" value="A=1-260"/>
</dbReference>
<dbReference type="PDB" id="6YZJ">
    <property type="method" value="X-ray"/>
    <property type="resolution" value="1.20 A"/>
    <property type="chains" value="A=1-260"/>
</dbReference>
<dbReference type="PDB" id="6YZK">
    <property type="method" value="X-ray"/>
    <property type="resolution" value="0.99 A"/>
    <property type="chains" value="A=1-260"/>
</dbReference>
<dbReference type="PDB" id="6YZL">
    <property type="method" value="X-ray"/>
    <property type="resolution" value="1.20 A"/>
    <property type="chains" value="A=1-260"/>
</dbReference>
<dbReference type="PDB" id="6YZM">
    <property type="method" value="X-ray"/>
    <property type="resolution" value="1.50 A"/>
    <property type="chains" value="A=1-260"/>
</dbReference>
<dbReference type="PDB" id="6YZN">
    <property type="method" value="X-ray"/>
    <property type="resolution" value="0.95 A"/>
    <property type="chains" value="A=1-260"/>
</dbReference>
<dbReference type="PDB" id="6YZO">
    <property type="method" value="X-ray"/>
    <property type="resolution" value="1.50 A"/>
    <property type="chains" value="A=1-260"/>
</dbReference>
<dbReference type="PDB" id="6YZP">
    <property type="method" value="X-ray"/>
    <property type="resolution" value="1.35 A"/>
    <property type="chains" value="A=1-260"/>
</dbReference>
<dbReference type="PDB" id="6YZQ">
    <property type="method" value="X-ray"/>
    <property type="resolution" value="1.04 A"/>
    <property type="chains" value="A=1-260"/>
</dbReference>
<dbReference type="PDB" id="6YZR">
    <property type="method" value="X-ray"/>
    <property type="resolution" value="1.20 A"/>
    <property type="chains" value="A=1-260"/>
</dbReference>
<dbReference type="PDB" id="6YZS">
    <property type="method" value="X-ray"/>
    <property type="resolution" value="1.05 A"/>
    <property type="chains" value="A=1-260"/>
</dbReference>
<dbReference type="PDB" id="6YZT">
    <property type="method" value="X-ray"/>
    <property type="resolution" value="1.05 A"/>
    <property type="chains" value="A=1-260"/>
</dbReference>
<dbReference type="PDB" id="6YZU">
    <property type="method" value="X-ray"/>
    <property type="resolution" value="1.00 A"/>
    <property type="chains" value="A=1-260"/>
</dbReference>
<dbReference type="PDB" id="6YZV">
    <property type="method" value="X-ray"/>
    <property type="resolution" value="1.65 A"/>
    <property type="chains" value="A=1-260"/>
</dbReference>
<dbReference type="PDB" id="6YZW">
    <property type="method" value="X-ray"/>
    <property type="resolution" value="1.03 A"/>
    <property type="chains" value="A=1-260"/>
</dbReference>
<dbReference type="PDB" id="6YZX">
    <property type="method" value="X-ray"/>
    <property type="resolution" value="1.10 A"/>
    <property type="chains" value="A=1-260"/>
</dbReference>
<dbReference type="PDB" id="6Z04">
    <property type="method" value="X-ray"/>
    <property type="resolution" value="1.05 A"/>
    <property type="chains" value="A=1-260"/>
</dbReference>
<dbReference type="PDB" id="6ZR8">
    <property type="method" value="X-ray"/>
    <property type="resolution" value="1.79 A"/>
    <property type="chains" value="A=1-260"/>
</dbReference>
<dbReference type="PDB" id="7A6V">
    <property type="method" value="X-ray"/>
    <property type="resolution" value="2.00 A"/>
    <property type="chains" value="A=3-260"/>
</dbReference>
<dbReference type="PDB" id="7AEQ">
    <property type="method" value="X-ray"/>
    <property type="resolution" value="1.50 A"/>
    <property type="chains" value="A=1-260"/>
</dbReference>
<dbReference type="PDB" id="7AES">
    <property type="method" value="X-ray"/>
    <property type="resolution" value="1.40 A"/>
    <property type="chains" value="A=1-260"/>
</dbReference>
<dbReference type="PDB" id="7AGN">
    <property type="method" value="X-ray"/>
    <property type="resolution" value="1.15 A"/>
    <property type="chains" value="A/B/C/D=1-260"/>
</dbReference>
<dbReference type="PDB" id="7ASJ">
    <property type="method" value="X-ray"/>
    <property type="resolution" value="1.43 A"/>
    <property type="chains" value="A=1-260"/>
</dbReference>
<dbReference type="PDB" id="7BFA">
    <property type="method" value="X-ray"/>
    <property type="resolution" value="1.60 A"/>
    <property type="chains" value="AAA=1-260"/>
</dbReference>
<dbReference type="PDB" id="7BG5">
    <property type="method" value="X-ray"/>
    <property type="resolution" value="1.43 A"/>
    <property type="chains" value="AAA=1-260"/>
</dbReference>
<dbReference type="PDB" id="7BHH">
    <property type="method" value="X-ray"/>
    <property type="resolution" value="1.40 A"/>
    <property type="chains" value="A=1-260"/>
</dbReference>
<dbReference type="PDB" id="7BI5">
    <property type="method" value="X-ray"/>
    <property type="resolution" value="1.74 A"/>
    <property type="chains" value="A=1-260"/>
</dbReference>
<dbReference type="PDB" id="7CA2">
    <property type="method" value="X-ray"/>
    <property type="resolution" value="2.40 A"/>
    <property type="chains" value="A=1-260"/>
</dbReference>
<dbReference type="PDB" id="7JNR">
    <property type="method" value="X-ray"/>
    <property type="resolution" value="1.44 A"/>
    <property type="chains" value="A=1-260"/>
</dbReference>
<dbReference type="PDB" id="7JNV">
    <property type="method" value="X-ray"/>
    <property type="resolution" value="1.49 A"/>
    <property type="chains" value="A=1-260"/>
</dbReference>
<dbReference type="PDB" id="7JNW">
    <property type="method" value="X-ray"/>
    <property type="resolution" value="1.29 A"/>
    <property type="chains" value="A=1-260"/>
</dbReference>
<dbReference type="PDB" id="7JNX">
    <property type="method" value="X-ray"/>
    <property type="resolution" value="1.29 A"/>
    <property type="chains" value="A=1-260"/>
</dbReference>
<dbReference type="PDB" id="7JNZ">
    <property type="method" value="X-ray"/>
    <property type="resolution" value="1.29 A"/>
    <property type="chains" value="A=1-260"/>
</dbReference>
<dbReference type="PDB" id="7JO0">
    <property type="method" value="X-ray"/>
    <property type="resolution" value="1.61 A"/>
    <property type="chains" value="A=1-257"/>
</dbReference>
<dbReference type="PDB" id="7JO1">
    <property type="method" value="X-ray"/>
    <property type="resolution" value="1.50 A"/>
    <property type="chains" value="A=1-257"/>
</dbReference>
<dbReference type="PDB" id="7JO2">
    <property type="method" value="X-ray"/>
    <property type="resolution" value="1.31 A"/>
    <property type="chains" value="A=1-257"/>
</dbReference>
<dbReference type="PDB" id="7JO3">
    <property type="method" value="X-ray"/>
    <property type="resolution" value="1.45 A"/>
    <property type="chains" value="A=1-257"/>
</dbReference>
<dbReference type="PDB" id="7JOB">
    <property type="method" value="X-ray"/>
    <property type="resolution" value="1.38 A"/>
    <property type="chains" value="A=1-257"/>
</dbReference>
<dbReference type="PDB" id="7JOC">
    <property type="method" value="X-ray"/>
    <property type="resolution" value="1.39 A"/>
    <property type="chains" value="A=1-257"/>
</dbReference>
<dbReference type="PDB" id="7K6I">
    <property type="method" value="X-ray"/>
    <property type="resolution" value="1.41 A"/>
    <property type="chains" value="A=1-260"/>
</dbReference>
<dbReference type="PDB" id="7K6J">
    <property type="method" value="X-ray"/>
    <property type="resolution" value="1.75 A"/>
    <property type="chains" value="A=1-260"/>
</dbReference>
<dbReference type="PDB" id="7K6K">
    <property type="method" value="X-ray"/>
    <property type="resolution" value="1.31 A"/>
    <property type="chains" value="A=1-260"/>
</dbReference>
<dbReference type="PDB" id="7K6L">
    <property type="method" value="X-ray"/>
    <property type="resolution" value="1.66 A"/>
    <property type="chains" value="A=1-260"/>
</dbReference>
<dbReference type="PDB" id="7K6T">
    <property type="method" value="X-ray"/>
    <property type="resolution" value="1.76 A"/>
    <property type="chains" value="A=1-257"/>
</dbReference>
<dbReference type="PDB" id="7K6U">
    <property type="method" value="X-ray"/>
    <property type="resolution" value="1.60 A"/>
    <property type="chains" value="A=1-257"/>
</dbReference>
<dbReference type="PDB" id="7K6X">
    <property type="method" value="X-ray"/>
    <property type="resolution" value="1.76 A"/>
    <property type="chains" value="A=1-257"/>
</dbReference>
<dbReference type="PDB" id="7K6Z">
    <property type="method" value="X-ray"/>
    <property type="resolution" value="1.66 A"/>
    <property type="chains" value="A=1-257"/>
</dbReference>
<dbReference type="PDB" id="7M23">
    <property type="method" value="X-ray"/>
    <property type="resolution" value="1.30 A"/>
    <property type="chains" value="A=3-260"/>
</dbReference>
<dbReference type="PDB" id="7M24">
    <property type="method" value="X-ray"/>
    <property type="resolution" value="1.30 A"/>
    <property type="chains" value="A=3-260"/>
</dbReference>
<dbReference type="PDB" id="7M26">
    <property type="method" value="X-ray"/>
    <property type="resolution" value="1.30 A"/>
    <property type="chains" value="A=3-260"/>
</dbReference>
<dbReference type="PDB" id="7MU3">
    <property type="method" value="X-ray"/>
    <property type="resolution" value="1.35 A"/>
    <property type="chains" value="A=1-260"/>
</dbReference>
<dbReference type="PDB" id="7NH6">
    <property type="method" value="X-ray"/>
    <property type="resolution" value="1.28 A"/>
    <property type="chains" value="AAA=1-260"/>
</dbReference>
<dbReference type="PDB" id="7NH8">
    <property type="method" value="X-ray"/>
    <property type="resolution" value="1.37 A"/>
    <property type="chains" value="AAA=1-260"/>
</dbReference>
<dbReference type="PDB" id="7NTB">
    <property type="method" value="X-ray"/>
    <property type="resolution" value="1.70 A"/>
    <property type="chains" value="A=2-260"/>
</dbReference>
<dbReference type="PDB" id="7NZR">
    <property type="method" value="X-ray"/>
    <property type="resolution" value="1.28 A"/>
    <property type="chains" value="A=1-260"/>
</dbReference>
<dbReference type="PDB" id="7NZS">
    <property type="method" value="X-ray"/>
    <property type="resolution" value="1.50 A"/>
    <property type="chains" value="A=1-260"/>
</dbReference>
<dbReference type="PDB" id="7NZT">
    <property type="method" value="X-ray"/>
    <property type="resolution" value="1.35 A"/>
    <property type="chains" value="A=1-260"/>
</dbReference>
<dbReference type="PDB" id="7NZU">
    <property type="method" value="X-ray"/>
    <property type="resolution" value="1.24 A"/>
    <property type="chains" value="A=1-260"/>
</dbReference>
<dbReference type="PDB" id="7NZW">
    <property type="method" value="X-ray"/>
    <property type="resolution" value="1.45 A"/>
    <property type="chains" value="A=1-260"/>
</dbReference>
<dbReference type="PDB" id="7NZX">
    <property type="method" value="X-ray"/>
    <property type="resolution" value="1.33 A"/>
    <property type="chains" value="A=1-260"/>
</dbReference>
<dbReference type="PDB" id="7OK8">
    <property type="method" value="X-ray"/>
    <property type="resolution" value="1.43 A"/>
    <property type="chains" value="AAA=1-260"/>
</dbReference>
<dbReference type="PDB" id="7ONV">
    <property type="method" value="X-ray"/>
    <property type="resolution" value="1.04 A"/>
    <property type="chains" value="AAA=1-260"/>
</dbReference>
<dbReference type="PDB" id="7ORP">
    <property type="method" value="X-ray"/>
    <property type="resolution" value="1.43 A"/>
    <property type="chains" value="AAA=1-260"/>
</dbReference>
<dbReference type="PDB" id="7ORQ">
    <property type="method" value="X-ray"/>
    <property type="resolution" value="1.43 A"/>
    <property type="chains" value="AAA=1-260"/>
</dbReference>
<dbReference type="PDB" id="7OYM">
    <property type="method" value="X-ray"/>
    <property type="resolution" value="0.98 A"/>
    <property type="chains" value="A=1-260"/>
</dbReference>
<dbReference type="PDB" id="7OYN">
    <property type="method" value="X-ray"/>
    <property type="resolution" value="0.98 A"/>
    <property type="chains" value="A=1-260"/>
</dbReference>
<dbReference type="PDB" id="7OYO">
    <property type="method" value="X-ray"/>
    <property type="resolution" value="1.03 A"/>
    <property type="chains" value="A=1-260"/>
</dbReference>
<dbReference type="PDB" id="7OYP">
    <property type="method" value="X-ray"/>
    <property type="resolution" value="1.05 A"/>
    <property type="chains" value="A=1-260"/>
</dbReference>
<dbReference type="PDB" id="7OYQ">
    <property type="method" value="X-ray"/>
    <property type="resolution" value="1.15 A"/>
    <property type="chains" value="A=1-260"/>
</dbReference>
<dbReference type="PDB" id="7OYR">
    <property type="method" value="X-ray"/>
    <property type="resolution" value="1.15 A"/>
    <property type="chains" value="A=1-260"/>
</dbReference>
<dbReference type="PDB" id="7Q0C">
    <property type="method" value="X-ray"/>
    <property type="resolution" value="1.12 A"/>
    <property type="chains" value="A/B=1-260"/>
</dbReference>
<dbReference type="PDB" id="7Q0E">
    <property type="method" value="X-ray"/>
    <property type="resolution" value="1.30 A"/>
    <property type="chains" value="A=3-260"/>
</dbReference>
<dbReference type="PDB" id="7QBH">
    <property type="method" value="X-ray"/>
    <property type="resolution" value="1.22 A"/>
    <property type="chains" value="AAA=1-260"/>
</dbReference>
<dbReference type="PDB" id="7QGX">
    <property type="method" value="X-ray"/>
    <property type="resolution" value="1.19 A"/>
    <property type="chains" value="A=1-260"/>
</dbReference>
<dbReference type="PDB" id="7QGY">
    <property type="method" value="X-ray"/>
    <property type="resolution" value="1.50 A"/>
    <property type="chains" value="A=1-260"/>
</dbReference>
<dbReference type="PDB" id="7QGZ">
    <property type="method" value="X-ray"/>
    <property type="resolution" value="1.13 A"/>
    <property type="chains" value="A=1-260"/>
</dbReference>
<dbReference type="PDB" id="7QNV">
    <property type="method" value="X-ray"/>
    <property type="resolution" value="1.28 A"/>
    <property type="chains" value="AAA=1-260"/>
</dbReference>
<dbReference type="PDB" id="7QRK">
    <property type="method" value="X-ray"/>
    <property type="resolution" value="1.43 A"/>
    <property type="chains" value="AAA=1-260"/>
</dbReference>
<dbReference type="PDB" id="7QSE">
    <property type="method" value="X-ray"/>
    <property type="resolution" value="1.43 A"/>
    <property type="chains" value="AAA=1-260"/>
</dbReference>
<dbReference type="PDB" id="7QSI">
    <property type="method" value="X-ray"/>
    <property type="resolution" value="1.30 A"/>
    <property type="chains" value="AAA=1-260"/>
</dbReference>
<dbReference type="PDB" id="7QZX">
    <property type="method" value="X-ray"/>
    <property type="resolution" value="1.24 A"/>
    <property type="chains" value="AAA=1-260"/>
</dbReference>
<dbReference type="PDB" id="7R1X">
    <property type="method" value="X-ray"/>
    <property type="resolution" value="1.35 A"/>
    <property type="chains" value="AAA=1-260"/>
</dbReference>
<dbReference type="PDB" id="7RNY">
    <property type="method" value="X-ray"/>
    <property type="resolution" value="1.29 A"/>
    <property type="chains" value="A=1-260"/>
</dbReference>
<dbReference type="PDB" id="7RNZ">
    <property type="method" value="X-ray"/>
    <property type="resolution" value="1.30 A"/>
    <property type="chains" value="A=1-260"/>
</dbReference>
<dbReference type="PDB" id="7RRE">
    <property type="method" value="X-ray"/>
    <property type="resolution" value="1.44 A"/>
    <property type="chains" value="A=1-260"/>
</dbReference>
<dbReference type="PDB" id="7RRF">
    <property type="method" value="X-ray"/>
    <property type="resolution" value="1.45 A"/>
    <property type="chains" value="A=4-260"/>
</dbReference>
<dbReference type="PDB" id="7SUW">
    <property type="method" value="X-ray"/>
    <property type="resolution" value="1.46 A"/>
    <property type="chains" value="A=4-260"/>
</dbReference>
<dbReference type="PDB" id="7SUY">
    <property type="method" value="X-ray"/>
    <property type="resolution" value="1.41 A"/>
    <property type="chains" value="A=4-260"/>
</dbReference>
<dbReference type="PDB" id="7SV1">
    <property type="method" value="X-ray"/>
    <property type="resolution" value="1.56 A"/>
    <property type="chains" value="A=4-260"/>
</dbReference>
<dbReference type="PDB" id="7SV8">
    <property type="method" value="X-ray"/>
    <property type="resolution" value="1.39 A"/>
    <property type="chains" value="A=4-260"/>
</dbReference>
<dbReference type="PDB" id="7U5W">
    <property type="method" value="X-ray"/>
    <property type="resolution" value="1.13 A"/>
    <property type="chains" value="A=3-260"/>
</dbReference>
<dbReference type="PDB" id="7U5X">
    <property type="method" value="X-ray"/>
    <property type="resolution" value="1.04 A"/>
    <property type="chains" value="A=3-260"/>
</dbReference>
<dbReference type="PDB" id="7Y2A">
    <property type="method" value="X-ray"/>
    <property type="resolution" value="1.20 A"/>
    <property type="chains" value="A=1-260"/>
</dbReference>
<dbReference type="PDB" id="7Y2C">
    <property type="method" value="X-ray"/>
    <property type="resolution" value="1.20 A"/>
    <property type="chains" value="A=1-260"/>
</dbReference>
<dbReference type="PDB" id="7Y2E">
    <property type="method" value="X-ray"/>
    <property type="resolution" value="1.20 A"/>
    <property type="chains" value="A=1-260"/>
</dbReference>
<dbReference type="PDB" id="7Y2F">
    <property type="method" value="X-ray"/>
    <property type="resolution" value="1.20 A"/>
    <property type="chains" value="A=1-260"/>
</dbReference>
<dbReference type="PDB" id="7Y2G">
    <property type="method" value="X-ray"/>
    <property type="resolution" value="1.20 A"/>
    <property type="chains" value="A=1-260"/>
</dbReference>
<dbReference type="PDB" id="7Y2H">
    <property type="method" value="X-ray"/>
    <property type="resolution" value="1.20 A"/>
    <property type="chains" value="A=1-260"/>
</dbReference>
<dbReference type="PDB" id="7Y2I">
    <property type="method" value="X-ray"/>
    <property type="resolution" value="1.40 A"/>
    <property type="chains" value="A=1-260"/>
</dbReference>
<dbReference type="PDB" id="7Y2J">
    <property type="method" value="X-ray"/>
    <property type="resolution" value="1.25 A"/>
    <property type="chains" value="A=1-260"/>
</dbReference>
<dbReference type="PDB" id="7Y2K">
    <property type="method" value="X-ray"/>
    <property type="resolution" value="1.25 A"/>
    <property type="chains" value="A=1-260"/>
</dbReference>
<dbReference type="PDB" id="7Y2L">
    <property type="method" value="X-ray"/>
    <property type="resolution" value="1.25 A"/>
    <property type="chains" value="A=1-260"/>
</dbReference>
<dbReference type="PDB" id="7Y2M">
    <property type="method" value="X-ray"/>
    <property type="resolution" value="1.25 A"/>
    <property type="chains" value="A=1-260"/>
</dbReference>
<dbReference type="PDB" id="7Y2N">
    <property type="method" value="X-ray"/>
    <property type="resolution" value="1.25 A"/>
    <property type="chains" value="A=1-260"/>
</dbReference>
<dbReference type="PDB" id="7Y2O">
    <property type="method" value="X-ray"/>
    <property type="resolution" value="1.25 A"/>
    <property type="chains" value="A=1-260"/>
</dbReference>
<dbReference type="PDB" id="7Y2Q">
    <property type="method" value="X-ray"/>
    <property type="resolution" value="1.35 A"/>
    <property type="chains" value="A=1-260"/>
</dbReference>
<dbReference type="PDB" id="7Y2R">
    <property type="method" value="X-ray"/>
    <property type="resolution" value="1.20 A"/>
    <property type="chains" value="A=1-260"/>
</dbReference>
<dbReference type="PDB" id="7Y2S">
    <property type="method" value="X-ray"/>
    <property type="resolution" value="1.20 A"/>
    <property type="chains" value="A=1-260"/>
</dbReference>
<dbReference type="PDB" id="7Y2T">
    <property type="method" value="X-ray"/>
    <property type="resolution" value="1.20 A"/>
    <property type="chains" value="A=1-260"/>
</dbReference>
<dbReference type="PDB" id="7Y2U">
    <property type="method" value="X-ray"/>
    <property type="resolution" value="1.20 A"/>
    <property type="chains" value="A=1-260"/>
</dbReference>
<dbReference type="PDB" id="7Y2V">
    <property type="method" value="X-ray"/>
    <property type="resolution" value="1.20 A"/>
    <property type="chains" value="A=1-260"/>
</dbReference>
<dbReference type="PDB" id="7Y2W">
    <property type="method" value="X-ray"/>
    <property type="resolution" value="1.20 A"/>
    <property type="chains" value="A=1-260"/>
</dbReference>
<dbReference type="PDB" id="7Y2X">
    <property type="method" value="X-ray"/>
    <property type="resolution" value="1.50 A"/>
    <property type="chains" value="A=1-260"/>
</dbReference>
<dbReference type="PDB" id="7YWT">
    <property type="method" value="X-ray"/>
    <property type="resolution" value="1.11 A"/>
    <property type="chains" value="AAA=1-260"/>
</dbReference>
<dbReference type="PDB" id="7ZL6">
    <property type="method" value="X-ray"/>
    <property type="resolution" value="1.38 A"/>
    <property type="chains" value="AAA=1-260"/>
</dbReference>
<dbReference type="PDB" id="7ZWB">
    <property type="method" value="X-ray"/>
    <property type="resolution" value="1.48 A"/>
    <property type="chains" value="AAA=1-260"/>
</dbReference>
<dbReference type="PDB" id="8AA6">
    <property type="method" value="X-ray"/>
    <property type="resolution" value="1.15 A"/>
    <property type="chains" value="A=1-260"/>
</dbReference>
<dbReference type="PDB" id="8AAE">
    <property type="method" value="X-ray"/>
    <property type="resolution" value="1.15 A"/>
    <property type="chains" value="A=1-260"/>
</dbReference>
<dbReference type="PDB" id="8B29">
    <property type="method" value="X-ray"/>
    <property type="resolution" value="1.70 A"/>
    <property type="chains" value="A=3-260"/>
</dbReference>
<dbReference type="PDB" id="8BJX">
    <property type="method" value="X-ray"/>
    <property type="resolution" value="1.28 A"/>
    <property type="chains" value="AAA=1-260"/>
</dbReference>
<dbReference type="PDB" id="8BOE">
    <property type="method" value="X-ray"/>
    <property type="resolution" value="1.55 A"/>
    <property type="chains" value="AAA=1-260"/>
</dbReference>
<dbReference type="PDB" id="8BZZ">
    <property type="method" value="X-ray"/>
    <property type="resolution" value="1.07 A"/>
    <property type="chains" value="AAA=1-260"/>
</dbReference>
<dbReference type="PDB" id="8C0Q">
    <property type="method" value="X-ray"/>
    <property type="resolution" value="1.67 A"/>
    <property type="chains" value="A=1-260"/>
</dbReference>
<dbReference type="PDB" id="8C0R">
    <property type="method" value="X-ray"/>
    <property type="resolution" value="1.56 A"/>
    <property type="chains" value="A=1-260"/>
</dbReference>
<dbReference type="PDB" id="8CA2">
    <property type="method" value="X-ray"/>
    <property type="resolution" value="2.40 A"/>
    <property type="chains" value="A=1-260"/>
</dbReference>
<dbReference type="PDB" id="8CR0">
    <property type="method" value="X-ray"/>
    <property type="resolution" value="1.22 A"/>
    <property type="chains" value="X=1-260"/>
</dbReference>
<dbReference type="PDB" id="8DJ9">
    <property type="method" value="X-ray"/>
    <property type="resolution" value="1.54 A"/>
    <property type="chains" value="A=1-260"/>
</dbReference>
<dbReference type="PDB" id="8EM3">
    <property type="method" value="X-ray"/>
    <property type="resolution" value="1.62 A"/>
    <property type="chains" value="A=1-260"/>
</dbReference>
<dbReference type="PDB" id="8EMU">
    <property type="method" value="X-ray"/>
    <property type="resolution" value="1.13 A"/>
    <property type="chains" value="A=1-260"/>
</dbReference>
<dbReference type="PDB" id="8EXC">
    <property type="method" value="X-ray"/>
    <property type="resolution" value="1.90 A"/>
    <property type="chains" value="A=1-260"/>
</dbReference>
<dbReference type="PDB" id="8EXG">
    <property type="method" value="X-ray"/>
    <property type="resolution" value="1.99 A"/>
    <property type="chains" value="A=1-260"/>
</dbReference>
<dbReference type="PDB" id="8EYL">
    <property type="method" value="X-ray"/>
    <property type="resolution" value="1.18 A"/>
    <property type="chains" value="A=1-260"/>
</dbReference>
<dbReference type="PDB" id="8FAL">
    <property type="method" value="X-ray"/>
    <property type="resolution" value="1.37 A"/>
    <property type="chains" value="A=1-260"/>
</dbReference>
<dbReference type="PDB" id="8FAU">
    <property type="method" value="X-ray"/>
    <property type="resolution" value="1.44 A"/>
    <property type="chains" value="A=1-260"/>
</dbReference>
<dbReference type="PDB" id="8FQX">
    <property type="method" value="X-ray"/>
    <property type="resolution" value="1.50 A"/>
    <property type="chains" value="A=1-260"/>
</dbReference>
<dbReference type="PDB" id="8FQY">
    <property type="method" value="X-ray"/>
    <property type="resolution" value="1.47 A"/>
    <property type="chains" value="A=1-260"/>
</dbReference>
<dbReference type="PDB" id="8FQZ">
    <property type="method" value="X-ray"/>
    <property type="resolution" value="1.47 A"/>
    <property type="chains" value="A=1-260"/>
</dbReference>
<dbReference type="PDB" id="8FR1">
    <property type="method" value="X-ray"/>
    <property type="resolution" value="2.00 A"/>
    <property type="chains" value="A=4-260"/>
</dbReference>
<dbReference type="PDB" id="8FR2">
    <property type="method" value="X-ray"/>
    <property type="resolution" value="1.31 A"/>
    <property type="chains" value="A=4-260"/>
</dbReference>
<dbReference type="PDB" id="8FR4">
    <property type="method" value="X-ray"/>
    <property type="resolution" value="1.12 A"/>
    <property type="chains" value="A=4-260"/>
</dbReference>
<dbReference type="PDB" id="8IGF">
    <property type="method" value="X-ray"/>
    <property type="resolution" value="2.60 A"/>
    <property type="chains" value="A=4-260"/>
</dbReference>
<dbReference type="PDB" id="8J2O">
    <property type="method" value="X-ray"/>
    <property type="resolution" value="2.60 A"/>
    <property type="chains" value="A=1-260"/>
</dbReference>
<dbReference type="PDB" id="8JEE">
    <property type="method" value="X-ray"/>
    <property type="resolution" value="2.96 A"/>
    <property type="chains" value="A=4-260"/>
</dbReference>
<dbReference type="PDB" id="8OGD">
    <property type="method" value="X-ray"/>
    <property type="resolution" value="1.75 A"/>
    <property type="chains" value="A=1-260"/>
</dbReference>
<dbReference type="PDB" id="8OGE">
    <property type="method" value="X-ray"/>
    <property type="resolution" value="1.46 A"/>
    <property type="chains" value="A=1-260"/>
</dbReference>
<dbReference type="PDB" id="8OGF">
    <property type="method" value="X-ray"/>
    <property type="resolution" value="1.32 A"/>
    <property type="chains" value="AAA=1-260"/>
</dbReference>
<dbReference type="PDB" id="8OKE">
    <property type="method" value="X-ray"/>
    <property type="resolution" value="1.05 A"/>
    <property type="chains" value="A=1-260"/>
</dbReference>
<dbReference type="PDB" id="8OKG">
    <property type="method" value="X-ray"/>
    <property type="resolution" value="1.45 A"/>
    <property type="chains" value="A=1-260"/>
</dbReference>
<dbReference type="PDB" id="8OKJ">
    <property type="method" value="X-ray"/>
    <property type="resolution" value="1.40 A"/>
    <property type="chains" value="A=1-260"/>
</dbReference>
<dbReference type="PDB" id="8OKO">
    <property type="method" value="X-ray"/>
    <property type="resolution" value="1.25 A"/>
    <property type="chains" value="A=1-260"/>
</dbReference>
<dbReference type="PDB" id="8OKP">
    <property type="method" value="X-ray"/>
    <property type="resolution" value="1.25 A"/>
    <property type="chains" value="A=1-260"/>
</dbReference>
<dbReference type="PDB" id="8OKQ">
    <property type="method" value="X-ray"/>
    <property type="resolution" value="1.00 A"/>
    <property type="chains" value="A=1-260"/>
</dbReference>
<dbReference type="PDB" id="8OKT">
    <property type="method" value="X-ray"/>
    <property type="resolution" value="1.50 A"/>
    <property type="chains" value="A=1-260"/>
</dbReference>
<dbReference type="PDB" id="8OLA">
    <property type="method" value="X-ray"/>
    <property type="resolution" value="1.40 A"/>
    <property type="chains" value="A=1-260"/>
</dbReference>
<dbReference type="PDB" id="8OLF">
    <property type="method" value="X-ray"/>
    <property type="resolution" value="1.45 A"/>
    <property type="chains" value="A=1-260"/>
</dbReference>
<dbReference type="PDB" id="8OLI">
    <property type="method" value="X-ray"/>
    <property type="resolution" value="1.40 A"/>
    <property type="chains" value="A=1-260"/>
</dbReference>
<dbReference type="PDB" id="8OLK">
    <property type="method" value="X-ray"/>
    <property type="resolution" value="1.27 A"/>
    <property type="chains" value="A=1-260"/>
</dbReference>
<dbReference type="PDB" id="8OLM">
    <property type="method" value="X-ray"/>
    <property type="resolution" value="1.50 A"/>
    <property type="chains" value="A=1-260"/>
</dbReference>
<dbReference type="PDB" id="8OMB">
    <property type="method" value="X-ray"/>
    <property type="resolution" value="1.35 A"/>
    <property type="chains" value="A=1-260"/>
</dbReference>
<dbReference type="PDB" id="8OMH">
    <property type="method" value="X-ray"/>
    <property type="resolution" value="1.45 A"/>
    <property type="chains" value="A=1-260"/>
</dbReference>
<dbReference type="PDB" id="8OMN">
    <property type="method" value="X-ray"/>
    <property type="resolution" value="1.40 A"/>
    <property type="chains" value="A=1-260"/>
</dbReference>
<dbReference type="PDB" id="8OMP">
    <property type="method" value="X-ray"/>
    <property type="resolution" value="1.41 A"/>
    <property type="chains" value="A=1-260"/>
</dbReference>
<dbReference type="PDB" id="8OO8">
    <property type="method" value="X-ray"/>
    <property type="resolution" value="1.40 A"/>
    <property type="chains" value="A=2-260"/>
</dbReference>
<dbReference type="PDB" id="8OTP">
    <property type="method" value="X-ray"/>
    <property type="resolution" value="1.40 A"/>
    <property type="chains" value="AAA=1-260"/>
</dbReference>
<dbReference type="PDB" id="8OUB">
    <property type="method" value="X-ray"/>
    <property type="resolution" value="1.18 A"/>
    <property type="chains" value="AAA=1-260"/>
</dbReference>
<dbReference type="PDB" id="8P6U">
    <property type="method" value="X-ray"/>
    <property type="resolution" value="1.30 A"/>
    <property type="chains" value="A=3-260"/>
</dbReference>
<dbReference type="PDB" id="8PHL">
    <property type="method" value="X-ray"/>
    <property type="resolution" value="1.30 A"/>
    <property type="chains" value="A=3-260"/>
</dbReference>
<dbReference type="PDB" id="8PHM">
    <property type="method" value="X-ray"/>
    <property type="resolution" value="1.45 A"/>
    <property type="chains" value="A=5-260"/>
</dbReference>
<dbReference type="PDB" id="8Q0C">
    <property type="method" value="X-ray"/>
    <property type="resolution" value="1.30 A"/>
    <property type="chains" value="A=3-260"/>
</dbReference>
<dbReference type="PDB" id="8QF7">
    <property type="method" value="X-ray"/>
    <property type="resolution" value="1.23 A"/>
    <property type="chains" value="AAA=1-260"/>
</dbReference>
<dbReference type="PDB" id="8QF9">
    <property type="method" value="X-ray"/>
    <property type="resolution" value="1.28 A"/>
    <property type="chains" value="AAA=1-260"/>
</dbReference>
<dbReference type="PDB" id="8QFK">
    <property type="method" value="X-ray"/>
    <property type="resolution" value="1.11 A"/>
    <property type="chains" value="AAA=1-260"/>
</dbReference>
<dbReference type="PDB" id="8QH8">
    <property type="method" value="X-ray"/>
    <property type="resolution" value="1.04 A"/>
    <property type="chains" value="A=1-260"/>
</dbReference>
<dbReference type="PDB" id="8QHG">
    <property type="method" value="X-ray"/>
    <property type="resolution" value="1.91 A"/>
    <property type="chains" value="A=1-260"/>
</dbReference>
<dbReference type="PDB" id="8QHJ">
    <property type="method" value="X-ray"/>
    <property type="resolution" value="1.62 A"/>
    <property type="chains" value="A=1-260"/>
</dbReference>
<dbReference type="PDB" id="8QHO">
    <property type="method" value="X-ray"/>
    <property type="resolution" value="1.43 A"/>
    <property type="chains" value="AAA=1-260"/>
</dbReference>
<dbReference type="PDB" id="8QKZ">
    <property type="method" value="X-ray"/>
    <property type="resolution" value="1.34 A"/>
    <property type="chains" value="AAA=1-260"/>
</dbReference>
<dbReference type="PDB" id="8QQA">
    <property type="method" value="X-ray"/>
    <property type="resolution" value="1.35 A"/>
    <property type="chains" value="AAA=1-260"/>
</dbReference>
<dbReference type="PDB" id="8QUF">
    <property type="method" value="X-ray"/>
    <property type="resolution" value="1.14 A"/>
    <property type="chains" value="AAA=1-260"/>
</dbReference>
<dbReference type="PDB" id="8R1I">
    <property type="method" value="X-ray"/>
    <property type="resolution" value="1.46 A"/>
    <property type="chains" value="A=1-260"/>
</dbReference>
<dbReference type="PDB" id="8R2F">
    <property type="method" value="X-ray"/>
    <property type="resolution" value="1.25 A"/>
    <property type="chains" value="AAA=1-260"/>
</dbReference>
<dbReference type="PDB" id="8R2K">
    <property type="method" value="X-ray"/>
    <property type="resolution" value="1.60 A"/>
    <property type="chains" value="AAA=1-260"/>
</dbReference>
<dbReference type="PDB" id="8RAR">
    <property type="method" value="X-ray"/>
    <property type="resolution" value="1.15 A"/>
    <property type="chains" value="A=1-260"/>
</dbReference>
<dbReference type="PDB" id="8RBP">
    <property type="method" value="X-ray"/>
    <property type="resolution" value="1.15 A"/>
    <property type="chains" value="A=1-260"/>
</dbReference>
<dbReference type="PDB" id="8RJ2">
    <property type="method" value="X-ray"/>
    <property type="resolution" value="1.12 A"/>
    <property type="chains" value="A=1-260"/>
</dbReference>
<dbReference type="PDB" id="8RLP">
    <property type="method" value="X-ray"/>
    <property type="resolution" value="1.34 A"/>
    <property type="chains" value="AAA=1-260"/>
</dbReference>
<dbReference type="PDB" id="8RLQ">
    <property type="method" value="X-ray"/>
    <property type="resolution" value="1.50 A"/>
    <property type="chains" value="AAA=1-260"/>
</dbReference>
<dbReference type="PDB" id="8RNS">
    <property type="method" value="X-ray"/>
    <property type="resolution" value="1.14 A"/>
    <property type="chains" value="A=1-260"/>
</dbReference>
<dbReference type="PDB" id="8ROU">
    <property type="method" value="X-ray"/>
    <property type="resolution" value="1.08 A"/>
    <property type="chains" value="A=1-260"/>
</dbReference>
<dbReference type="PDB" id="8ROW">
    <property type="method" value="X-ray"/>
    <property type="resolution" value="1.05 A"/>
    <property type="chains" value="A=1-260"/>
</dbReference>
<dbReference type="PDB" id="8SAF">
    <property type="method" value="X-ray"/>
    <property type="resolution" value="1.23 A"/>
    <property type="chains" value="A=1-260"/>
</dbReference>
<dbReference type="PDB" id="8SAG">
    <property type="method" value="X-ray"/>
    <property type="resolution" value="1.52 A"/>
    <property type="chains" value="A=1-260"/>
</dbReference>
<dbReference type="PDB" id="8SD1">
    <property type="method" value="X-ray"/>
    <property type="resolution" value="1.30 A"/>
    <property type="chains" value="A=1-260"/>
</dbReference>
<dbReference type="PDB" id="8SD6">
    <property type="method" value="X-ray"/>
    <property type="resolution" value="1.40 A"/>
    <property type="chains" value="A=1-260"/>
</dbReference>
<dbReference type="PDB" id="8SD7">
    <property type="method" value="X-ray"/>
    <property type="resolution" value="1.70 A"/>
    <property type="chains" value="A=1-260"/>
</dbReference>
<dbReference type="PDB" id="8SD8">
    <property type="method" value="X-ray"/>
    <property type="resolution" value="1.79 A"/>
    <property type="chains" value="A=1-260"/>
</dbReference>
<dbReference type="PDB" id="8SD9">
    <property type="method" value="X-ray"/>
    <property type="resolution" value="1.90 A"/>
    <property type="chains" value="A=1-260"/>
</dbReference>
<dbReference type="PDB" id="8SF1">
    <property type="method" value="X-ray"/>
    <property type="resolution" value="1.70 A"/>
    <property type="chains" value="A=1-260"/>
</dbReference>
<dbReference type="PDB" id="8TTR">
    <property type="method" value="X-ray"/>
    <property type="resolution" value="1.45 A"/>
    <property type="chains" value="A=1-260"/>
</dbReference>
<dbReference type="PDB" id="8UFW">
    <property type="method" value="X-ray"/>
    <property type="resolution" value="1.22 A"/>
    <property type="chains" value="A=1-260"/>
</dbReference>
<dbReference type="PDB" id="8UFX">
    <property type="method" value="X-ray"/>
    <property type="resolution" value="1.21 A"/>
    <property type="chains" value="A=1-260"/>
</dbReference>
<dbReference type="PDB" id="8VZG">
    <property type="method" value="X-ray"/>
    <property type="resolution" value="1.79 A"/>
    <property type="chains" value="A=1-260"/>
</dbReference>
<dbReference type="PDB" id="8WEP">
    <property type="method" value="X-ray"/>
    <property type="resolution" value="1.20 A"/>
    <property type="chains" value="A=1-260"/>
</dbReference>
<dbReference type="PDB" id="8WER">
    <property type="method" value="X-ray"/>
    <property type="resolution" value="1.42 A"/>
    <property type="chains" value="A=1-260"/>
</dbReference>
<dbReference type="PDB" id="8WES">
    <property type="method" value="X-ray"/>
    <property type="resolution" value="1.45 A"/>
    <property type="chains" value="A=1-260"/>
</dbReference>
<dbReference type="PDB" id="8ZWV">
    <property type="method" value="X-ray"/>
    <property type="resolution" value="1.50 A"/>
    <property type="chains" value="A=1-260"/>
</dbReference>
<dbReference type="PDB" id="9CA2">
    <property type="method" value="X-ray"/>
    <property type="resolution" value="2.80 A"/>
    <property type="chains" value="A=1-260"/>
</dbReference>
<dbReference type="PDB" id="9F15">
    <property type="method" value="X-ray"/>
    <property type="resolution" value="1.93 A"/>
    <property type="chains" value="A=1-260"/>
</dbReference>
<dbReference type="PDB" id="9F2E">
    <property type="method" value="X-ray"/>
    <property type="resolution" value="2.02 A"/>
    <property type="chains" value="A=1-260"/>
</dbReference>
<dbReference type="PDB" id="9F2F">
    <property type="method" value="X-ray"/>
    <property type="resolution" value="1.52 A"/>
    <property type="chains" value="A/B/C/D=1-260"/>
</dbReference>
<dbReference type="PDB" id="9G38">
    <property type="method" value="X-ray"/>
    <property type="resolution" value="1.20 A"/>
    <property type="chains" value="A=1-260"/>
</dbReference>
<dbReference type="PDB" id="9GFV">
    <property type="method" value="X-ray"/>
    <property type="resolution" value="1.14 A"/>
    <property type="chains" value="A=1-260"/>
</dbReference>
<dbReference type="PDB" id="9GFW">
    <property type="method" value="X-ray"/>
    <property type="resolution" value="1.07 A"/>
    <property type="chains" value="A=1-260"/>
</dbReference>
<dbReference type="PDB" id="9GFX">
    <property type="method" value="X-ray"/>
    <property type="resolution" value="1.35 A"/>
    <property type="chains" value="A=1-260"/>
</dbReference>
<dbReference type="PDB" id="9H3H">
    <property type="method" value="X-ray"/>
    <property type="resolution" value="1.80 A"/>
    <property type="chains" value="A=4-260"/>
</dbReference>
<dbReference type="PDBsum" id="12CA"/>
<dbReference type="PDBsum" id="1A42"/>
<dbReference type="PDBsum" id="1AM6"/>
<dbReference type="PDBsum" id="1AVN"/>
<dbReference type="PDBsum" id="1BCD"/>
<dbReference type="PDBsum" id="1BIC"/>
<dbReference type="PDBsum" id="1BN1"/>
<dbReference type="PDBsum" id="1BN3"/>
<dbReference type="PDBsum" id="1BN4"/>
<dbReference type="PDBsum" id="1BNM"/>
<dbReference type="PDBsum" id="1BNN"/>
<dbReference type="PDBsum" id="1BNQ"/>
<dbReference type="PDBsum" id="1BNT"/>
<dbReference type="PDBsum" id="1BNU"/>
<dbReference type="PDBsum" id="1BNV"/>
<dbReference type="PDBsum" id="1BNW"/>
<dbReference type="PDBsum" id="1BV3"/>
<dbReference type="PDBsum" id="1CA2"/>
<dbReference type="PDBsum" id="1CA3"/>
<dbReference type="PDBsum" id="1CAH"/>
<dbReference type="PDBsum" id="1CAI"/>
<dbReference type="PDBsum" id="1CAJ"/>
<dbReference type="PDBsum" id="1CAK"/>
<dbReference type="PDBsum" id="1CAL"/>
<dbReference type="PDBsum" id="1CAM"/>
<dbReference type="PDBsum" id="1CAN"/>
<dbReference type="PDBsum" id="1CAO"/>
<dbReference type="PDBsum" id="1CAY"/>
<dbReference type="PDBsum" id="1CAZ"/>
<dbReference type="PDBsum" id="1CCS"/>
<dbReference type="PDBsum" id="1CCT"/>
<dbReference type="PDBsum" id="1CCU"/>
<dbReference type="PDBsum" id="1CIL"/>
<dbReference type="PDBsum" id="1CIM"/>
<dbReference type="PDBsum" id="1CIN"/>
<dbReference type="PDBsum" id="1CNB"/>
<dbReference type="PDBsum" id="1CNC"/>
<dbReference type="PDBsum" id="1CNG"/>
<dbReference type="PDBsum" id="1CNH"/>
<dbReference type="PDBsum" id="1CNI"/>
<dbReference type="PDBsum" id="1CNJ"/>
<dbReference type="PDBsum" id="1CNK"/>
<dbReference type="PDBsum" id="1CNW"/>
<dbReference type="PDBsum" id="1CNX"/>
<dbReference type="PDBsum" id="1CNY"/>
<dbReference type="PDBsum" id="1CRA"/>
<dbReference type="PDBsum" id="1CVA"/>
<dbReference type="PDBsum" id="1CVB"/>
<dbReference type="PDBsum" id="1CVC"/>
<dbReference type="PDBsum" id="1CVD"/>
<dbReference type="PDBsum" id="1CVE"/>
<dbReference type="PDBsum" id="1CVF"/>
<dbReference type="PDBsum" id="1CVH"/>
<dbReference type="PDBsum" id="1DCA"/>
<dbReference type="PDBsum" id="1DCB"/>
<dbReference type="PDBsum" id="1EOU"/>
<dbReference type="PDBsum" id="1F2W"/>
<dbReference type="PDBsum" id="1FQL"/>
<dbReference type="PDBsum" id="1FQM"/>
<dbReference type="PDBsum" id="1FQN"/>
<dbReference type="PDBsum" id="1FQR"/>
<dbReference type="PDBsum" id="1FR4"/>
<dbReference type="PDBsum" id="1FR7"/>
<dbReference type="PDBsum" id="1FSN"/>
<dbReference type="PDBsum" id="1FSQ"/>
<dbReference type="PDBsum" id="1FSR"/>
<dbReference type="PDBsum" id="1G0E"/>
<dbReference type="PDBsum" id="1G0F"/>
<dbReference type="PDBsum" id="1G1D"/>
<dbReference type="PDBsum" id="1G3Z"/>
<dbReference type="PDBsum" id="1G45"/>
<dbReference type="PDBsum" id="1G46"/>
<dbReference type="PDBsum" id="1G48"/>
<dbReference type="PDBsum" id="1G4J"/>
<dbReference type="PDBsum" id="1G4O"/>
<dbReference type="PDBsum" id="1G52"/>
<dbReference type="PDBsum" id="1G53"/>
<dbReference type="PDBsum" id="1G54"/>
<dbReference type="PDBsum" id="1H4N"/>
<dbReference type="PDBsum" id="1H9N"/>
<dbReference type="PDBsum" id="1H9Q"/>
<dbReference type="PDBsum" id="1HCA"/>
<dbReference type="PDBsum" id="1HEA"/>
<dbReference type="PDBsum" id="1HEB"/>
<dbReference type="PDBsum" id="1HEC"/>
<dbReference type="PDBsum" id="1HED"/>
<dbReference type="PDBsum" id="1HVA"/>
<dbReference type="PDBsum" id="1I8Z"/>
<dbReference type="PDBsum" id="1I90"/>
<dbReference type="PDBsum" id="1I91"/>
<dbReference type="PDBsum" id="1I9L"/>
<dbReference type="PDBsum" id="1I9M"/>
<dbReference type="PDBsum" id="1I9N"/>
<dbReference type="PDBsum" id="1I9O"/>
<dbReference type="PDBsum" id="1I9P"/>
<dbReference type="PDBsum" id="1I9Q"/>
<dbReference type="PDBsum" id="1IF4"/>
<dbReference type="PDBsum" id="1IF5"/>
<dbReference type="PDBsum" id="1IF6"/>
<dbReference type="PDBsum" id="1IF7"/>
<dbReference type="PDBsum" id="1IF8"/>
<dbReference type="PDBsum" id="1IF9"/>
<dbReference type="PDBsum" id="1KWQ"/>
<dbReference type="PDBsum" id="1KWR"/>
<dbReference type="PDBsum" id="1LG5"/>
<dbReference type="PDBsum" id="1LG6"/>
<dbReference type="PDBsum" id="1LGD"/>
<dbReference type="PDBsum" id="1LUG"/>
<dbReference type="PDBsum" id="1LZV"/>
<dbReference type="PDBsum" id="1MOO"/>
<dbReference type="PDBsum" id="1MUA"/>
<dbReference type="PDBsum" id="1OKL"/>
<dbReference type="PDBsum" id="1OKM"/>
<dbReference type="PDBsum" id="1OKN"/>
<dbReference type="PDBsum" id="1OQ5"/>
<dbReference type="PDBsum" id="1RAY"/>
<dbReference type="PDBsum" id="1RAZ"/>
<dbReference type="PDBsum" id="1RZA"/>
<dbReference type="PDBsum" id="1RZB"/>
<dbReference type="PDBsum" id="1RZC"/>
<dbReference type="PDBsum" id="1RZD"/>
<dbReference type="PDBsum" id="1RZE"/>
<dbReference type="PDBsum" id="1T9N"/>
<dbReference type="PDBsum" id="1TB0"/>
<dbReference type="PDBsum" id="1TBT"/>
<dbReference type="PDBsum" id="1TE3"/>
<dbReference type="PDBsum" id="1TEQ"/>
<dbReference type="PDBsum" id="1TEU"/>
<dbReference type="PDBsum" id="1TG3"/>
<dbReference type="PDBsum" id="1TG9"/>
<dbReference type="PDBsum" id="1TH9"/>
<dbReference type="PDBsum" id="1THK"/>
<dbReference type="PDBsum" id="1TTM"/>
<dbReference type="PDBsum" id="1UGA"/>
<dbReference type="PDBsum" id="1UGB"/>
<dbReference type="PDBsum" id="1UGC"/>
<dbReference type="PDBsum" id="1UGD"/>
<dbReference type="PDBsum" id="1UGE"/>
<dbReference type="PDBsum" id="1UGF"/>
<dbReference type="PDBsum" id="1UGG"/>
<dbReference type="PDBsum" id="1XEG"/>
<dbReference type="PDBsum" id="1XEV"/>
<dbReference type="PDBsum" id="1XPZ"/>
<dbReference type="PDBsum" id="1XQ0"/>
<dbReference type="PDBsum" id="1YDA"/>
<dbReference type="PDBsum" id="1YDB"/>
<dbReference type="PDBsum" id="1YDC"/>
<dbReference type="PDBsum" id="1YDD"/>
<dbReference type="PDBsum" id="1YO0"/>
<dbReference type="PDBsum" id="1YO1"/>
<dbReference type="PDBsum" id="1YO2"/>
<dbReference type="PDBsum" id="1Z9Y"/>
<dbReference type="PDBsum" id="1ZE8"/>
<dbReference type="PDBsum" id="1ZFK"/>
<dbReference type="PDBsum" id="1ZFQ"/>
<dbReference type="PDBsum" id="1ZGE"/>
<dbReference type="PDBsum" id="1ZGF"/>
<dbReference type="PDBsum" id="1ZH9"/>
<dbReference type="PDBsum" id="1ZSA"/>
<dbReference type="PDBsum" id="1ZSB"/>
<dbReference type="PDBsum" id="1ZSC"/>
<dbReference type="PDBsum" id="2ABE"/>
<dbReference type="PDBsum" id="2AW1"/>
<dbReference type="PDBsum" id="2AX2"/>
<dbReference type="PDBsum" id="2CA2"/>
<dbReference type="PDBsum" id="2CBA"/>
<dbReference type="PDBsum" id="2CBB"/>
<dbReference type="PDBsum" id="2CBC"/>
<dbReference type="PDBsum" id="2CBD"/>
<dbReference type="PDBsum" id="2CBE"/>
<dbReference type="PDBsum" id="2EU2"/>
<dbReference type="PDBsum" id="2EU3"/>
<dbReference type="PDBsum" id="2EZ7"/>
<dbReference type="PDBsum" id="2F14"/>
<dbReference type="PDBsum" id="2FMG"/>
<dbReference type="PDBsum" id="2FMZ"/>
<dbReference type="PDBsum" id="2FNK"/>
<dbReference type="PDBsum" id="2FNM"/>
<dbReference type="PDBsum" id="2FNN"/>
<dbReference type="PDBsum" id="2FOQ"/>
<dbReference type="PDBsum" id="2FOS"/>
<dbReference type="PDBsum" id="2FOU"/>
<dbReference type="PDBsum" id="2FOV"/>
<dbReference type="PDBsum" id="2GD8"/>
<dbReference type="PDBsum" id="2GEH"/>
<dbReference type="PDBsum" id="2H15"/>
<dbReference type="PDBsum" id="2H4N"/>
<dbReference type="PDBsum" id="2HD6"/>
<dbReference type="PDBsum" id="2HKK"/>
<dbReference type="PDBsum" id="2HL4"/>
<dbReference type="PDBsum" id="2HNC"/>
<dbReference type="PDBsum" id="2HOC"/>
<dbReference type="PDBsum" id="2ILI"/>
<dbReference type="PDBsum" id="2NNG"/>
<dbReference type="PDBsum" id="2NNO"/>
<dbReference type="PDBsum" id="2NNS"/>
<dbReference type="PDBsum" id="2NNV"/>
<dbReference type="PDBsum" id="2NWO"/>
<dbReference type="PDBsum" id="2NWP"/>
<dbReference type="PDBsum" id="2NWY"/>
<dbReference type="PDBsum" id="2NWZ"/>
<dbReference type="PDBsum" id="2NXR"/>
<dbReference type="PDBsum" id="2NXS"/>
<dbReference type="PDBsum" id="2NXT"/>
<dbReference type="PDBsum" id="2O4Z"/>
<dbReference type="PDBsum" id="2OSF"/>
<dbReference type="PDBsum" id="2OSM"/>
<dbReference type="PDBsum" id="2POU"/>
<dbReference type="PDBsum" id="2POV"/>
<dbReference type="PDBsum" id="2POW"/>
<dbReference type="PDBsum" id="2Q1B"/>
<dbReference type="PDBsum" id="2Q1Q"/>
<dbReference type="PDBsum" id="2Q38"/>
<dbReference type="PDBsum" id="2QO8"/>
<dbReference type="PDBsum" id="2QOA"/>
<dbReference type="PDBsum" id="2QP6"/>
<dbReference type="PDBsum" id="2VVA"/>
<dbReference type="PDBsum" id="2VVB"/>
<dbReference type="PDBsum" id="2WD2"/>
<dbReference type="PDBsum" id="2WD3"/>
<dbReference type="PDBsum" id="2WEG"/>
<dbReference type="PDBsum" id="2WEH"/>
<dbReference type="PDBsum" id="2WEJ"/>
<dbReference type="PDBsum" id="2WEO"/>
<dbReference type="PDBsum" id="2X7S"/>
<dbReference type="PDBsum" id="2X7T"/>
<dbReference type="PDBsum" id="2X7U"/>
<dbReference type="PDBsum" id="3B4F"/>
<dbReference type="PDBsum" id="3BET"/>
<dbReference type="PDBsum" id="3BL0"/>
<dbReference type="PDBsum" id="3BL1"/>
<dbReference type="PDBsum" id="3C7P"/>
<dbReference type="PDBsum" id="3CA2"/>
<dbReference type="PDBsum" id="3CAJ"/>
<dbReference type="PDBsum" id="3CYU"/>
<dbReference type="PDBsum" id="3D8W"/>
<dbReference type="PDBsum" id="3D92"/>
<dbReference type="PDBsum" id="3D93"/>
<dbReference type="PDBsum" id="3D9Z"/>
<dbReference type="PDBsum" id="3DAZ"/>
<dbReference type="PDBsum" id="3DBU"/>
<dbReference type="PDBsum" id="3DC3"/>
<dbReference type="PDBsum" id="3DC9"/>
<dbReference type="PDBsum" id="3DCC"/>
<dbReference type="PDBsum" id="3DCS"/>
<dbReference type="PDBsum" id="3DCW"/>
<dbReference type="PDBsum" id="3DD0"/>
<dbReference type="PDBsum" id="3DD8"/>
<dbReference type="PDBsum" id="3DV7"/>
<dbReference type="PDBsum" id="3DVB"/>
<dbReference type="PDBsum" id="3DVC"/>
<dbReference type="PDBsum" id="3DVD"/>
<dbReference type="PDBsum" id="3EFI"/>
<dbReference type="PDBsum" id="3EFT"/>
<dbReference type="PDBsum" id="3F4X"/>
<dbReference type="PDBsum" id="3F8E"/>
<dbReference type="PDBsum" id="3FFP"/>
<dbReference type="PDBsum" id="3GZ0"/>
<dbReference type="PDBsum" id="3HFP"/>
<dbReference type="PDBsum" id="3HKN"/>
<dbReference type="PDBsum" id="3HKQ"/>
<dbReference type="PDBsum" id="3HKT"/>
<dbReference type="PDBsum" id="3HKU"/>
<dbReference type="PDBsum" id="3HLJ"/>
<dbReference type="PDBsum" id="3HS4"/>
<dbReference type="PDBsum" id="3IBI"/>
<dbReference type="PDBsum" id="3IBL"/>
<dbReference type="PDBsum" id="3IBN"/>
<dbReference type="PDBsum" id="3IBU"/>
<dbReference type="PDBsum" id="3IEO"/>
<dbReference type="PDBsum" id="3IGP"/>
<dbReference type="PDBsum" id="3K2F"/>
<dbReference type="PDBsum" id="3K34"/>
<dbReference type="PDBsum" id="3K7K"/>
<dbReference type="PDBsum" id="3KIG"/>
<dbReference type="PDBsum" id="3KKX"/>
<dbReference type="PDBsum" id="3KNE"/>
<dbReference type="PDBsum" id="3KOI"/>
<dbReference type="PDBsum" id="3KOK"/>
<dbReference type="PDBsum" id="3KON"/>
<dbReference type="PDBsum" id="3KS3"/>
<dbReference type="PDBsum" id="3KWA"/>
<dbReference type="PDBsum" id="3L14"/>
<dbReference type="PDBsum" id="3M04"/>
<dbReference type="PDBsum" id="3M14"/>
<dbReference type="PDBsum" id="3M1J"/>
<dbReference type="PDBsum" id="3M1K"/>
<dbReference type="PDBsum" id="3M1Q"/>
<dbReference type="PDBsum" id="3M1W"/>
<dbReference type="PDBsum" id="3M2N"/>
<dbReference type="PDBsum" id="3M2X"/>
<dbReference type="PDBsum" id="3M2Y"/>
<dbReference type="PDBsum" id="3M2Z"/>
<dbReference type="PDBsum" id="3M3X"/>
<dbReference type="PDBsum" id="3M40"/>
<dbReference type="PDBsum" id="3M5E"/>
<dbReference type="PDBsum" id="3M5S"/>
<dbReference type="PDBsum" id="3M5T"/>
<dbReference type="PDBsum" id="3M67"/>
<dbReference type="PDBsum" id="3M96"/>
<dbReference type="PDBsum" id="3M98"/>
<dbReference type="PDBsum" id="3MHC"/>
<dbReference type="PDBsum" id="3MHI"/>
<dbReference type="PDBsum" id="3MHL"/>
<dbReference type="PDBsum" id="3MHM"/>
<dbReference type="PDBsum" id="3MHO"/>
<dbReference type="PDBsum" id="3ML2"/>
<dbReference type="PDBsum" id="3MMF"/>
<dbReference type="PDBsum" id="3MNA"/>
<dbReference type="PDBsum" id="3MNH"/>
<dbReference type="PDBsum" id="3MNI"/>
<dbReference type="PDBsum" id="3MNJ"/>
<dbReference type="PDBsum" id="3MNK"/>
<dbReference type="PDBsum" id="3MNU"/>
<dbReference type="PDBsum" id="3MWO"/>
<dbReference type="PDBsum" id="3MYQ"/>
<dbReference type="PDBsum" id="3MZC"/>
<dbReference type="PDBsum" id="3N0N"/>
<dbReference type="PDBsum" id="3N2P"/>
<dbReference type="PDBsum" id="3N3J"/>
<dbReference type="PDBsum" id="3N4B"/>
<dbReference type="PDBsum" id="3NB5"/>
<dbReference type="PDBsum" id="3NI5"/>
<dbReference type="PDBsum" id="3NJ9"/>
<dbReference type="PDBsum" id="3OIK"/>
<dbReference type="PDBsum" id="3OIL"/>
<dbReference type="PDBsum" id="3OIM"/>
<dbReference type="PDBsum" id="3OKU"/>
<dbReference type="PDBsum" id="3OKV"/>
<dbReference type="PDBsum" id="3OY0"/>
<dbReference type="PDBsum" id="3OYQ"/>
<dbReference type="PDBsum" id="3OYS"/>
<dbReference type="PDBsum" id="3P3H"/>
<dbReference type="PDBsum" id="3P3J"/>
<dbReference type="PDBsum" id="3P44"/>
<dbReference type="PDBsum" id="3P4V"/>
<dbReference type="PDBsum" id="3P55"/>
<dbReference type="PDBsum" id="3P58"/>
<dbReference type="PDBsum" id="3P5A"/>
<dbReference type="PDBsum" id="3P5L"/>
<dbReference type="PDBsum" id="3PJJ"/>
<dbReference type="PDBsum" id="3PO6"/>
<dbReference type="PDBsum" id="3PYK"/>
<dbReference type="PDBsum" id="3QYK"/>
<dbReference type="PDBsum" id="3R16"/>
<dbReference type="PDBsum" id="3R17"/>
<dbReference type="PDBsum" id="3RG3"/>
<dbReference type="PDBsum" id="3RG4"/>
<dbReference type="PDBsum" id="3RGE"/>
<dbReference type="PDBsum" id="3RJ7"/>
<dbReference type="PDBsum" id="3RLD"/>
<dbReference type="PDBsum" id="3RYJ"/>
<dbReference type="PDBsum" id="3RYV"/>
<dbReference type="PDBsum" id="3RYX"/>
<dbReference type="PDBsum" id="3RYY"/>
<dbReference type="PDBsum" id="3RYZ"/>
<dbReference type="PDBsum" id="3RZ0"/>
<dbReference type="PDBsum" id="3RZ1"/>
<dbReference type="PDBsum" id="3RZ5"/>
<dbReference type="PDBsum" id="3RZ7"/>
<dbReference type="PDBsum" id="3RZ8"/>
<dbReference type="PDBsum" id="3S71"/>
<dbReference type="PDBsum" id="3S72"/>
<dbReference type="PDBsum" id="3S73"/>
<dbReference type="PDBsum" id="3S74"/>
<dbReference type="PDBsum" id="3S75"/>
<dbReference type="PDBsum" id="3S76"/>
<dbReference type="PDBsum" id="3S77"/>
<dbReference type="PDBsum" id="3S78"/>
<dbReference type="PDBsum" id="3S8X"/>
<dbReference type="PDBsum" id="3S9T"/>
<dbReference type="PDBsum" id="3SAP"/>
<dbReference type="PDBsum" id="3SAX"/>
<dbReference type="PDBsum" id="3SBH"/>
<dbReference type="PDBsum" id="3SBI"/>
<dbReference type="PDBsum" id="3T5U"/>
<dbReference type="PDBsum" id="3T5Z"/>
<dbReference type="PDBsum" id="3T82"/>
<dbReference type="PDBsum" id="3T83"/>
<dbReference type="PDBsum" id="3T84"/>
<dbReference type="PDBsum" id="3T85"/>
<dbReference type="PDBsum" id="3TMJ"/>
<dbReference type="PDBsum" id="3TVN"/>
<dbReference type="PDBsum" id="3TVO"/>
<dbReference type="PDBsum" id="3U3A"/>
<dbReference type="PDBsum" id="3U45"/>
<dbReference type="PDBsum" id="3U47"/>
<dbReference type="PDBsum" id="3U7C"/>
<dbReference type="PDBsum" id="3V2J"/>
<dbReference type="PDBsum" id="3V2M"/>
<dbReference type="PDBsum" id="3V3F"/>
<dbReference type="PDBsum" id="3V3G"/>
<dbReference type="PDBsum" id="3V3H"/>
<dbReference type="PDBsum" id="3V3I"/>
<dbReference type="PDBsum" id="3V3J"/>
<dbReference type="PDBsum" id="3V5G"/>
<dbReference type="PDBsum" id="3V7X"/>
<dbReference type="PDBsum" id="3VBD"/>
<dbReference type="PDBsum" id="3ZP9"/>
<dbReference type="PDBsum" id="4BCW"/>
<dbReference type="PDBsum" id="4BF1"/>
<dbReference type="PDBsum" id="4BF6"/>
<dbReference type="PDBsum" id="4CA2"/>
<dbReference type="PDBsum" id="4CAC"/>
<dbReference type="PDBsum" id="4CQ0"/>
<dbReference type="PDBsum" id="4DZ7"/>
<dbReference type="PDBsum" id="4DZ9"/>
<dbReference type="PDBsum" id="4E3D"/>
<dbReference type="PDBsum" id="4E3F"/>
<dbReference type="PDBsum" id="4E3G"/>
<dbReference type="PDBsum" id="4E3H"/>
<dbReference type="PDBsum" id="4E49"/>
<dbReference type="PDBsum" id="4E4A"/>
<dbReference type="PDBsum" id="4E5Q"/>
<dbReference type="PDBsum" id="4FIK"/>
<dbReference type="PDBsum" id="4FL7"/>
<dbReference type="PDBsum" id="4FPT"/>
<dbReference type="PDBsum" id="4FRC"/>
<dbReference type="PDBsum" id="4FU5"/>
<dbReference type="PDBsum" id="4FVN"/>
<dbReference type="PDBsum" id="4FVO"/>
<dbReference type="PDBsum" id="4G0C"/>
<dbReference type="PDBsum" id="4GL1"/>
<dbReference type="PDBsum" id="4HBA"/>
<dbReference type="PDBsum" id="4HEW"/>
<dbReference type="PDBsum" id="4HEY"/>
<dbReference type="PDBsum" id="4HEZ"/>
<dbReference type="PDBsum" id="4HF3"/>
<dbReference type="PDBsum" id="4HT0"/>
<dbReference type="PDBsum" id="4IDR"/>
<dbReference type="PDBsum" id="4ILX"/>
<dbReference type="PDBsum" id="4ITO"/>
<dbReference type="PDBsum" id="4ITP"/>
<dbReference type="PDBsum" id="4IWZ"/>
<dbReference type="PDBsum" id="4JS6"/>
<dbReference type="PDBsum" id="4JSA"/>
<dbReference type="PDBsum" id="4JSS"/>
<dbReference type="PDBsum" id="4JSW"/>
<dbReference type="PDBsum" id="4JSZ"/>
<dbReference type="PDBsum" id="4K0S"/>
<dbReference type="PDBsum" id="4K0T"/>
<dbReference type="PDBsum" id="4K0Z"/>
<dbReference type="PDBsum" id="4K13"/>
<dbReference type="PDBsum" id="4K1Q"/>
<dbReference type="PDBsum" id="4KAP"/>
<dbReference type="PDBsum" id="4KNI"/>
<dbReference type="PDBsum" id="4KNJ"/>
<dbReference type="PDBsum" id="4KUV"/>
<dbReference type="PDBsum" id="4KUW"/>
<dbReference type="PDBsum" id="4KUY"/>
<dbReference type="PDBsum" id="4KV0"/>
<dbReference type="PDBsum" id="4L5U"/>
<dbReference type="PDBsum" id="4L5V"/>
<dbReference type="PDBsum" id="4L5W"/>
<dbReference type="PDBsum" id="4LHI"/>
<dbReference type="PDBsum" id="4LP6"/>
<dbReference type="PDBsum" id="4M2R"/>
<dbReference type="PDBsum" id="4M2U"/>
<dbReference type="PDBsum" id="4M2V"/>
<dbReference type="PDBsum" id="4M2W"/>
<dbReference type="PDBsum" id="4MDG"/>
<dbReference type="PDBsum" id="4MDL"/>
<dbReference type="PDBsum" id="4MDM"/>
<dbReference type="PDBsum" id="4MLT"/>
<dbReference type="PDBsum" id="4MLX"/>
<dbReference type="PDBsum" id="4MO8"/>
<dbReference type="PDBsum" id="4MTY"/>
<dbReference type="PDBsum" id="4N0X"/>
<dbReference type="PDBsum" id="4N16"/>
<dbReference type="PDBsum" id="4PQ7"/>
<dbReference type="PDBsum" id="4PXX"/>
<dbReference type="PDBsum" id="4PYX"/>
<dbReference type="PDBsum" id="4PYY"/>
<dbReference type="PDBsum" id="4PZH"/>
<dbReference type="PDBsum" id="4Q06"/>
<dbReference type="PDBsum" id="4Q07"/>
<dbReference type="PDBsum" id="4Q08"/>
<dbReference type="PDBsum" id="4Q09"/>
<dbReference type="PDBsum" id="4Q49"/>
<dbReference type="PDBsum" id="4Q6D"/>
<dbReference type="PDBsum" id="4Q6E"/>
<dbReference type="PDBsum" id="4Q78"/>
<dbReference type="PDBsum" id="4Q7P"/>
<dbReference type="PDBsum" id="4Q7S"/>
<dbReference type="PDBsum" id="4Q7V"/>
<dbReference type="PDBsum" id="4Q7W"/>
<dbReference type="PDBsum" id="4Q81"/>
<dbReference type="PDBsum" id="4Q83"/>
<dbReference type="PDBsum" id="4Q87"/>
<dbReference type="PDBsum" id="4Q8X"/>
<dbReference type="PDBsum" id="4Q8Y"/>
<dbReference type="PDBsum" id="4Q8Z"/>
<dbReference type="PDBsum" id="4Q90"/>
<dbReference type="PDBsum" id="4Q99"/>
<dbReference type="PDBsum" id="4Q9Y"/>
<dbReference type="PDBsum" id="4QEF"/>
<dbReference type="PDBsum" id="4QIY"/>
<dbReference type="PDBsum" id="4QJM"/>
<dbReference type="PDBsum" id="4QK1"/>
<dbReference type="PDBsum" id="4QK2"/>
<dbReference type="PDBsum" id="4QK3"/>
<dbReference type="PDBsum" id="4QSA"/>
<dbReference type="PDBsum" id="4QSB"/>
<dbReference type="PDBsum" id="4QSI"/>
<dbReference type="PDBsum" id="4QTL"/>
<dbReference type="PDBsum" id="4QY3"/>
<dbReference type="PDBsum" id="4R59"/>
<dbReference type="PDBsum" id="4R5A"/>
<dbReference type="PDBsum" id="4R5B"/>
<dbReference type="PDBsum" id="4RFC"/>
<dbReference type="PDBsum" id="4RFD"/>
<dbReference type="PDBsum" id="4RH2"/>
<dbReference type="PDBsum" id="4RIU"/>
<dbReference type="PDBsum" id="4RIV"/>
<dbReference type="PDBsum" id="4RN4"/>
<dbReference type="PDBsum" id="4RUX"/>
<dbReference type="PDBsum" id="4RUY"/>
<dbReference type="PDBsum" id="4RUZ"/>
<dbReference type="PDBsum" id="4WL4"/>
<dbReference type="PDBsum" id="4WW6"/>
<dbReference type="PDBsum" id="4XE1"/>
<dbReference type="PDBsum" id="4Y0J"/>
<dbReference type="PDBsum" id="4YGJ"/>
<dbReference type="PDBsum" id="4YGK"/>
<dbReference type="PDBsum" id="4YGL"/>
<dbReference type="PDBsum" id="4YGN"/>
<dbReference type="PDBsum" id="4YVY"/>
<dbReference type="PDBsum" id="4YWP"/>
<dbReference type="PDBsum" id="4YX4"/>
<dbReference type="PDBsum" id="4YXI"/>
<dbReference type="PDBsum" id="4YXO"/>
<dbReference type="PDBsum" id="4YXU"/>
<dbReference type="PDBsum" id="4YYT"/>
<dbReference type="PDBsum" id="4Z0Q"/>
<dbReference type="PDBsum" id="4Z1E"/>
<dbReference type="PDBsum" id="4Z1J"/>
<dbReference type="PDBsum" id="4Z1K"/>
<dbReference type="PDBsum" id="4Z1N"/>
<dbReference type="PDBsum" id="4ZAO"/>
<dbReference type="PDBsum" id="4ZWI"/>
<dbReference type="PDBsum" id="4ZWX"/>
<dbReference type="PDBsum" id="4ZWY"/>
<dbReference type="PDBsum" id="4ZWZ"/>
<dbReference type="PDBsum" id="4ZX0"/>
<dbReference type="PDBsum" id="4ZX1"/>
<dbReference type="PDBsum" id="5A6H"/>
<dbReference type="PDBsum" id="5AMD"/>
<dbReference type="PDBsum" id="5AMG"/>
<dbReference type="PDBsum" id="5AML"/>
<dbReference type="PDBsum" id="5BNL"/>
<dbReference type="PDBsum" id="5BRU"/>
<dbReference type="PDBsum" id="5BRV"/>
<dbReference type="PDBsum" id="5BRW"/>
<dbReference type="PDBsum" id="5BYI"/>
<dbReference type="PDBsum" id="5C8I"/>
<dbReference type="PDBsum" id="5CA2"/>
<dbReference type="PDBsum" id="5CAC"/>
<dbReference type="PDBsum" id="5CLU"/>
<dbReference type="PDBsum" id="5DOG"/>
<dbReference type="PDBsum" id="5DOH"/>
<dbReference type="PDBsum" id="5DRS"/>
<dbReference type="PDBsum" id="5DSK"/>
<dbReference type="PDBsum" id="5DSL"/>
<dbReference type="PDBsum" id="5DSM"/>
<dbReference type="PDBsum" id="5DSO"/>
<dbReference type="PDBsum" id="5DSP"/>
<dbReference type="PDBsum" id="5DSQ"/>
<dbReference type="PDBsum" id="5DSR"/>
<dbReference type="PDBsum" id="5E28"/>
<dbReference type="PDBsum" id="5E2K"/>
<dbReference type="PDBsum" id="5E2R"/>
<dbReference type="PDBsum" id="5E2S"/>
<dbReference type="PDBsum" id="5EH5"/>
<dbReference type="PDBsum" id="5EH7"/>
<dbReference type="PDBsum" id="5EH8"/>
<dbReference type="PDBsum" id="5EHE"/>
<dbReference type="PDBsum" id="5EHV"/>
<dbReference type="PDBsum" id="5EHW"/>
<dbReference type="PDBsum" id="5EIJ"/>
<dbReference type="PDBsum" id="5EKH"/>
<dbReference type="PDBsum" id="5EKJ"/>
<dbReference type="PDBsum" id="5EKM"/>
<dbReference type="PDBsum" id="5EOI"/>
<dbReference type="PDBsum" id="5FDC"/>
<dbReference type="PDBsum" id="5FDI"/>
<dbReference type="PDBsum" id="5FLO"/>
<dbReference type="PDBsum" id="5FLP"/>
<dbReference type="PDBsum" id="5FLQ"/>
<dbReference type="PDBsum" id="5FLR"/>
<dbReference type="PDBsum" id="5FLS"/>
<dbReference type="PDBsum" id="5FLT"/>
<dbReference type="PDBsum" id="5FNG"/>
<dbReference type="PDBsum" id="5FNH"/>
<dbReference type="PDBsum" id="5FNI"/>
<dbReference type="PDBsum" id="5FNJ"/>
<dbReference type="PDBsum" id="5FNK"/>
<dbReference type="PDBsum" id="5FNL"/>
<dbReference type="PDBsum" id="5FNM"/>
<dbReference type="PDBsum" id="5G01"/>
<dbReference type="PDBsum" id="5G03"/>
<dbReference type="PDBsum" id="5G0B"/>
<dbReference type="PDBsum" id="5G0C"/>
<dbReference type="PDBsum" id="5GMN"/>
<dbReference type="PDBsum" id="5J8Z"/>
<dbReference type="PDBsum" id="5JDV"/>
<dbReference type="PDBsum" id="5JE7"/>
<dbReference type="PDBsum" id="5JEG"/>
<dbReference type="PDBsum" id="5JEH"/>
<dbReference type="PDBsum" id="5JEP"/>
<dbReference type="PDBsum" id="5JES"/>
<dbReference type="PDBsum" id="5JG3"/>
<dbReference type="PDBsum" id="5JG5"/>
<dbReference type="PDBsum" id="5JGS"/>
<dbReference type="PDBsum" id="5JGT"/>
<dbReference type="PDBsum" id="5JMZ"/>
<dbReference type="PDBsum" id="5JN3"/>
<dbReference type="PDBsum" id="5JN7"/>
<dbReference type="PDBsum" id="5JQ0"/>
<dbReference type="PDBsum" id="5JQT"/>
<dbReference type="PDBsum" id="5L3O"/>
<dbReference type="PDBsum" id="5L6K"/>
<dbReference type="PDBsum" id="5L6T"/>
<dbReference type="PDBsum" id="5L70"/>
<dbReference type="PDBsum" id="5L9E"/>
<dbReference type="PDBsum" id="5LJQ"/>
<dbReference type="PDBsum" id="5LJT"/>
<dbReference type="PDBsum" id="5LL4"/>
<dbReference type="PDBsum" id="5LL8"/>
<dbReference type="PDBsum" id="5LLC"/>
<dbReference type="PDBsum" id="5LLE"/>
<dbReference type="PDBsum" id="5LLG"/>
<dbReference type="PDBsum" id="5LLH"/>
<dbReference type="PDBsum" id="5LMD"/>
<dbReference type="PDBsum" id="5LVS"/>
<dbReference type="PDBsum" id="5M78"/>
<dbReference type="PDBsum" id="5MJN"/>
<dbReference type="PDBsum" id="5N0D"/>
<dbReference type="PDBsum" id="5N0E"/>
<dbReference type="PDBsum" id="5N1R"/>
<dbReference type="PDBsum" id="5N1S"/>
<dbReference type="PDBsum" id="5N24"/>
<dbReference type="PDBsum" id="5N25"/>
<dbReference type="PDBsum" id="5NEA"/>
<dbReference type="PDBsum" id="5NEE"/>
<dbReference type="PDBsum" id="5NXG"/>
<dbReference type="PDBsum" id="5NXI"/>
<dbReference type="PDBsum" id="5NXM"/>
<dbReference type="PDBsum" id="5NXO"/>
<dbReference type="PDBsum" id="5NXP"/>
<dbReference type="PDBsum" id="5NXV"/>
<dbReference type="PDBsum" id="5NXW"/>
<dbReference type="PDBsum" id="5NY1"/>
<dbReference type="PDBsum" id="5NY3"/>
<dbReference type="PDBsum" id="5NY6"/>
<dbReference type="PDBsum" id="5NYA"/>
<dbReference type="PDBsum" id="5O07"/>
<dbReference type="PDBsum" id="5OGN"/>
<dbReference type="PDBsum" id="5OGO"/>
<dbReference type="PDBsum" id="5OGP"/>
<dbReference type="PDBsum" id="5SZ0"/>
<dbReference type="PDBsum" id="5SZ1"/>
<dbReference type="PDBsum" id="5SZ2"/>
<dbReference type="PDBsum" id="5SZ3"/>
<dbReference type="PDBsum" id="5SZ4"/>
<dbReference type="PDBsum" id="5SZ5"/>
<dbReference type="PDBsum" id="5SZ6"/>
<dbReference type="PDBsum" id="5SZ7"/>
<dbReference type="PDBsum" id="5T71"/>
<dbReference type="PDBsum" id="5T72"/>
<dbReference type="PDBsum" id="5T74"/>
<dbReference type="PDBsum" id="5T75"/>
<dbReference type="PDBsum" id="5TFX"/>
<dbReference type="PDBsum" id="5TH4"/>
<dbReference type="PDBsum" id="5THI"/>
<dbReference type="PDBsum" id="5THJ"/>
<dbReference type="PDBsum" id="5THN"/>
<dbReference type="PDBsum" id="5TI0"/>
<dbReference type="PDBsum" id="5TXY"/>
<dbReference type="PDBsum" id="5TY1"/>
<dbReference type="PDBsum" id="5TY8"/>
<dbReference type="PDBsum" id="5TY9"/>
<dbReference type="PDBsum" id="5TYA"/>
<dbReference type="PDBsum" id="5U0D"/>
<dbReference type="PDBsum" id="5U0E"/>
<dbReference type="PDBsum" id="5U0F"/>
<dbReference type="PDBsum" id="5U0G"/>
<dbReference type="PDBsum" id="5ULN"/>
<dbReference type="PDBsum" id="5UMC"/>
<dbReference type="PDBsum" id="5VGY"/>
<dbReference type="PDBsum" id="5W8B"/>
<dbReference type="PDBsum" id="5WEX"/>
<dbReference type="PDBsum" id="5WG7"/>
<dbReference type="PDBsum" id="5WGP"/>
<dbReference type="PDBsum" id="5WLR"/>
<dbReference type="PDBsum" id="5WLT"/>
<dbReference type="PDBsum" id="5WLU"/>
<dbReference type="PDBsum" id="5WLV"/>
<dbReference type="PDBsum" id="5Y2R"/>
<dbReference type="PDBsum" id="5Y2S"/>
<dbReference type="PDBsum" id="5YUI"/>
<dbReference type="PDBsum" id="5YUJ"/>
<dbReference type="PDBsum" id="5YUK"/>
<dbReference type="PDBsum" id="5ZXW"/>
<dbReference type="PDBsum" id="6B4D"/>
<dbReference type="PDBsum" id="6B59"/>
<dbReference type="PDBsum" id="6B5A"/>
<dbReference type="PDBsum" id="6BBS"/>
<dbReference type="PDBsum" id="6BC9"/>
<dbReference type="PDBsum" id="6BCC"/>
<dbReference type="PDBsum" id="6C7W"/>
<dbReference type="PDBsum" id="6C7X"/>
<dbReference type="PDBsum" id="6CA2"/>
<dbReference type="PDBsum" id="6CEH"/>
<dbReference type="PDBsum" id="6CJV"/>
<dbReference type="PDBsum" id="6D1L"/>
<dbReference type="PDBsum" id="6D1M"/>
<dbReference type="PDBsum" id="6E8P"/>
<dbReference type="PDBsum" id="6E8X"/>
<dbReference type="PDBsum" id="6E91"/>
<dbReference type="PDBsum" id="6E92"/>
<dbReference type="PDBsum" id="6EBE"/>
<dbReference type="PDBsum" id="6ECZ"/>
<dbReference type="PDBsum" id="6EDA"/>
<dbReference type="PDBsum" id="6EEA"/>
<dbReference type="PDBsum" id="6EEH"/>
<dbReference type="PDBsum" id="6EEO"/>
<dbReference type="PDBsum" id="6EQU"/>
<dbReference type="PDBsum" id="6FJI"/>
<dbReference type="PDBsum" id="6FJJ"/>
<dbReference type="PDBsum" id="6G3Q"/>
<dbReference type="PDBsum" id="6G6T"/>
<dbReference type="PDBsum" id="6GCY"/>
<dbReference type="PDBsum" id="6GDC"/>
<dbReference type="PDBsum" id="6GM9"/>
<dbReference type="PDBsum" id="6GOT"/>
<dbReference type="PDBsum" id="6GXB"/>
<dbReference type="PDBsum" id="6GXE"/>
<dbReference type="PDBsum" id="6H29"/>
<dbReference type="PDBsum" id="6H2Z"/>
<dbReference type="PDBsum" id="6H33"/>
<dbReference type="PDBsum" id="6H34"/>
<dbReference type="PDBsum" id="6H3Q"/>
<dbReference type="PDBsum" id="6H6S"/>
<dbReference type="PDBsum" id="6HD2"/>
<dbReference type="PDBsum" id="6HQX"/>
<dbReference type="PDBsum" id="6HR3"/>
<dbReference type="PDBsum" id="6HX5"/>
<dbReference type="PDBsum" id="6HXD"/>
<dbReference type="PDBsum" id="6HZX"/>
<dbReference type="PDBsum" id="6I0W"/>
<dbReference type="PDBsum" id="6I1U"/>
<dbReference type="PDBsum" id="6I2F"/>
<dbReference type="PDBsum" id="6I3E"/>
<dbReference type="PDBsum" id="6IC2"/>
<dbReference type="PDBsum" id="6KLZ"/>
<dbReference type="PDBsum" id="6KM0"/>
<dbReference type="PDBsum" id="6KM1"/>
<dbReference type="PDBsum" id="6KM2"/>
<dbReference type="PDBsum" id="6KM3"/>
<dbReference type="PDBsum" id="6KM4"/>
<dbReference type="PDBsum" id="6KM5"/>
<dbReference type="PDBsum" id="6KM6"/>
<dbReference type="PDBsum" id="6LUU"/>
<dbReference type="PDBsum" id="6LUV"/>
<dbReference type="PDBsum" id="6LUW"/>
<dbReference type="PDBsum" id="6LUX"/>
<dbReference type="PDBsum" id="6LUY"/>
<dbReference type="PDBsum" id="6LUZ"/>
<dbReference type="PDBsum" id="6LV1"/>
<dbReference type="PDBsum" id="6LV2"/>
<dbReference type="PDBsum" id="6LV3"/>
<dbReference type="PDBsum" id="6LV4"/>
<dbReference type="PDBsum" id="6LV5"/>
<dbReference type="PDBsum" id="6LV6"/>
<dbReference type="PDBsum" id="6LV7"/>
<dbReference type="PDBsum" id="6LV8"/>
<dbReference type="PDBsum" id="6LV9"/>
<dbReference type="PDBsum" id="6LVA"/>
<dbReference type="PDBsum" id="6MBV"/>
<dbReference type="PDBsum" id="6MBY"/>
<dbReference type="PDBsum" id="6NLV"/>
<dbReference type="PDBsum" id="6NM0"/>
<dbReference type="PDBsum" id="6ODZ"/>
<dbReference type="PDBsum" id="6OE0"/>
<dbReference type="PDBsum" id="6OE1"/>
<dbReference type="PDBsum" id="6OTI"/>
<dbReference type="PDBsum" id="6OTK"/>
<dbReference type="PDBsum" id="6OTM"/>
<dbReference type="PDBsum" id="6OTO"/>
<dbReference type="PDBsum" id="6OTP"/>
<dbReference type="PDBsum" id="6OTQ"/>
<dbReference type="PDBsum" id="6OUB"/>
<dbReference type="PDBsum" id="6OUD"/>
<dbReference type="PDBsum" id="6OUE"/>
<dbReference type="PDBsum" id="6OUF"/>
<dbReference type="PDBsum" id="6OUH"/>
<dbReference type="PDBsum" id="6OUI"/>
<dbReference type="PDBsum" id="6OUJ"/>
<dbReference type="PDBsum" id="6OUK"/>
<dbReference type="PDBsum" id="6OUM"/>
<dbReference type="PDBsum" id="6PDV"/>
<dbReference type="PDBsum" id="6PEA"/>
<dbReference type="PDBsum" id="6PGX"/>
<dbReference type="PDBsum" id="6Q3O"/>
<dbReference type="PDBsum" id="6Q9T"/>
<dbReference type="PDBsum" id="6QEB"/>
<dbReference type="PDBsum" id="6QL1"/>
<dbReference type="PDBsum" id="6QL2"/>
<dbReference type="PDBsum" id="6QL3"/>
<dbReference type="PDBsum" id="6R6F"/>
<dbReference type="PDBsum" id="6R6J"/>
<dbReference type="PDBsum" id="6RFH"/>
<dbReference type="PDBsum" id="6RG3"/>
<dbReference type="PDBsum" id="6RG4"/>
<dbReference type="PDBsum" id="6RG5"/>
<dbReference type="PDBsum" id="6RH4"/>
<dbReference type="PDBsum" id="6RHJ"/>
<dbReference type="PDBsum" id="6RHK"/>
<dbReference type="PDBsum" id="6RIG"/>
<dbReference type="PDBsum" id="6RIT"/>
<dbReference type="PDBsum" id="6RJJ"/>
<dbReference type="PDBsum" id="6RKN"/>
<dbReference type="PDBsum" id="6RL9"/>
<dbReference type="PDBsum" id="6RM1"/>
<dbReference type="PDBsum" id="6RMP"/>
<dbReference type="PDBsum" id="6RMX"/>
<dbReference type="PDBsum" id="6RMY"/>
<dbReference type="PDBsum" id="6RNP"/>
<dbReference type="PDBsum" id="6ROB"/>
<dbReference type="PDBsum" id="6ROE"/>
<dbReference type="PDBsum" id="6ROF"/>
<dbReference type="PDBsum" id="6RQI"/>
<dbReference type="PDBsum" id="6RRG"/>
<dbReference type="PDBsum" id="6RRI"/>
<dbReference type="PDBsum" id="6RS5"/>
<dbReference type="PDBsum" id="6RSZ"/>
<dbReference type="PDBsum" id="6RVF"/>
<dbReference type="PDBsum" id="6RVK"/>
<dbReference type="PDBsum" id="6RVL"/>
<dbReference type="PDBsum" id="6RW1"/>
<dbReference type="PDBsum" id="6RZX"/>
<dbReference type="PDBsum" id="6S03"/>
<dbReference type="PDBsum" id="6S9G"/>
<dbReference type="PDBsum" id="6S9Z"/>
<dbReference type="PDBsum" id="6SAC"/>
<dbReference type="PDBsum" id="6SAS"/>
<dbReference type="PDBsum" id="6SAY"/>
<dbReference type="PDBsum" id="6SB7"/>
<dbReference type="PDBsum" id="6SBH"/>
<dbReference type="PDBsum" id="6SBL"/>
<dbReference type="PDBsum" id="6SBM"/>
<dbReference type="PDBsum" id="6SD7"/>
<dbReference type="PDBsum" id="6SDH"/>
<dbReference type="PDBsum" id="6SDI"/>
<dbReference type="PDBsum" id="6SDJ"/>
<dbReference type="PDBsum" id="6SDL"/>
<dbReference type="PDBsum" id="6SDS"/>
<dbReference type="PDBsum" id="6SEY"/>
<dbReference type="PDBsum" id="6SFQ"/>
<dbReference type="PDBsum" id="6SFU"/>
<dbReference type="PDBsum" id="6SG0"/>
<dbReference type="PDBsum" id="6SG6"/>
<dbReference type="PDBsum" id="6SX9"/>
<dbReference type="PDBsum" id="6SYB"/>
<dbReference type="PDBsum" id="6SYS"/>
<dbReference type="PDBsum" id="6T4N"/>
<dbReference type="PDBsum" id="6T4O"/>
<dbReference type="PDBsum" id="6T4P"/>
<dbReference type="PDBsum" id="6T5C"/>
<dbReference type="PDBsum" id="6T7U"/>
<dbReference type="PDBsum" id="6T81"/>
<dbReference type="PDBsum" id="6T9Z"/>
<dbReference type="PDBsum" id="6U4Q"/>
<dbReference type="PDBsum" id="6U4T"/>
<dbReference type="PDBsum" id="6UFB"/>
<dbReference type="PDBsum" id="6UFC"/>
<dbReference type="PDBsum" id="6UFD"/>
<dbReference type="PDBsum" id="6UGN"/>
<dbReference type="PDBsum" id="6UGO"/>
<dbReference type="PDBsum" id="6UGP"/>
<dbReference type="PDBsum" id="6UGQ"/>
<dbReference type="PDBsum" id="6UGR"/>
<dbReference type="PDBsum" id="6UGZ"/>
<dbReference type="PDBsum" id="6UH0"/>
<dbReference type="PDBsum" id="6UX1"/>
<dbReference type="PDBsum" id="6UZU"/>
<dbReference type="PDBsum" id="6VJ3"/>
<dbReference type="PDBsum" id="6VKG"/>
<dbReference type="PDBsum" id="6WKA"/>
<dbReference type="PDBsum" id="6WQ4"/>
<dbReference type="PDBsum" id="6WQ5"/>
<dbReference type="PDBsum" id="6WQ7"/>
<dbReference type="PDBsum" id="6WQ8"/>
<dbReference type="PDBsum" id="6WQ9"/>
<dbReference type="PDBsum" id="6XVH"/>
<dbReference type="PDBsum" id="6XWZ"/>
<dbReference type="PDBsum" id="6XXT"/>
<dbReference type="PDBsum" id="6YH4"/>
<dbReference type="PDBsum" id="6YH5"/>
<dbReference type="PDBsum" id="6YH6"/>
<dbReference type="PDBsum" id="6YH7"/>
<dbReference type="PDBsum" id="6YH8"/>
<dbReference type="PDBsum" id="6YH9"/>
<dbReference type="PDBsum" id="6YHA"/>
<dbReference type="PDBsum" id="6YHB"/>
<dbReference type="PDBsum" id="6YHC"/>
<dbReference type="PDBsum" id="6YJ3"/>
<dbReference type="PDBsum" id="6YKC"/>
<dbReference type="PDBsum" id="6YKH"/>
<dbReference type="PDBsum" id="6YMA"/>
<dbReference type="PDBsum" id="6YMB"/>
<dbReference type="PDBsum" id="6YO2"/>
<dbReference type="PDBsum" id="6YO4"/>
<dbReference type="PDBsum" id="6YO7"/>
<dbReference type="PDBsum" id="6YOI"/>
<dbReference type="PDBsum" id="6YOK"/>
<dbReference type="PDBsum" id="6YOL"/>
<dbReference type="PDBsum" id="6YPW"/>
<dbReference type="PDBsum" id="6YQT"/>
<dbReference type="PDBsum" id="6YQU"/>
<dbReference type="PDBsum" id="6YRI"/>
<dbReference type="PDBsum" id="6YZJ"/>
<dbReference type="PDBsum" id="6YZK"/>
<dbReference type="PDBsum" id="6YZL"/>
<dbReference type="PDBsum" id="6YZM"/>
<dbReference type="PDBsum" id="6YZN"/>
<dbReference type="PDBsum" id="6YZO"/>
<dbReference type="PDBsum" id="6YZP"/>
<dbReference type="PDBsum" id="6YZQ"/>
<dbReference type="PDBsum" id="6YZR"/>
<dbReference type="PDBsum" id="6YZS"/>
<dbReference type="PDBsum" id="6YZT"/>
<dbReference type="PDBsum" id="6YZU"/>
<dbReference type="PDBsum" id="6YZV"/>
<dbReference type="PDBsum" id="6YZW"/>
<dbReference type="PDBsum" id="6YZX"/>
<dbReference type="PDBsum" id="6Z04"/>
<dbReference type="PDBsum" id="6ZR8"/>
<dbReference type="PDBsum" id="7A6V"/>
<dbReference type="PDBsum" id="7AEQ"/>
<dbReference type="PDBsum" id="7AES"/>
<dbReference type="PDBsum" id="7AGN"/>
<dbReference type="PDBsum" id="7ASJ"/>
<dbReference type="PDBsum" id="7BFA"/>
<dbReference type="PDBsum" id="7BG5"/>
<dbReference type="PDBsum" id="7BHH"/>
<dbReference type="PDBsum" id="7BI5"/>
<dbReference type="PDBsum" id="7CA2"/>
<dbReference type="PDBsum" id="7JNR"/>
<dbReference type="PDBsum" id="7JNV"/>
<dbReference type="PDBsum" id="7JNW"/>
<dbReference type="PDBsum" id="7JNX"/>
<dbReference type="PDBsum" id="7JNZ"/>
<dbReference type="PDBsum" id="7JO0"/>
<dbReference type="PDBsum" id="7JO1"/>
<dbReference type="PDBsum" id="7JO2"/>
<dbReference type="PDBsum" id="7JO3"/>
<dbReference type="PDBsum" id="7JOB"/>
<dbReference type="PDBsum" id="7JOC"/>
<dbReference type="PDBsum" id="7K6I"/>
<dbReference type="PDBsum" id="7K6J"/>
<dbReference type="PDBsum" id="7K6K"/>
<dbReference type="PDBsum" id="7K6L"/>
<dbReference type="PDBsum" id="7K6T"/>
<dbReference type="PDBsum" id="7K6U"/>
<dbReference type="PDBsum" id="7K6X"/>
<dbReference type="PDBsum" id="7K6Z"/>
<dbReference type="PDBsum" id="7M23"/>
<dbReference type="PDBsum" id="7M24"/>
<dbReference type="PDBsum" id="7M26"/>
<dbReference type="PDBsum" id="7MU3"/>
<dbReference type="PDBsum" id="7NH6"/>
<dbReference type="PDBsum" id="7NH8"/>
<dbReference type="PDBsum" id="7NTB"/>
<dbReference type="PDBsum" id="7NZR"/>
<dbReference type="PDBsum" id="7NZS"/>
<dbReference type="PDBsum" id="7NZT"/>
<dbReference type="PDBsum" id="7NZU"/>
<dbReference type="PDBsum" id="7NZW"/>
<dbReference type="PDBsum" id="7NZX"/>
<dbReference type="PDBsum" id="7OK8"/>
<dbReference type="PDBsum" id="7ONV"/>
<dbReference type="PDBsum" id="7ORP"/>
<dbReference type="PDBsum" id="7ORQ"/>
<dbReference type="PDBsum" id="7OYM"/>
<dbReference type="PDBsum" id="7OYN"/>
<dbReference type="PDBsum" id="7OYO"/>
<dbReference type="PDBsum" id="7OYP"/>
<dbReference type="PDBsum" id="7OYQ"/>
<dbReference type="PDBsum" id="7OYR"/>
<dbReference type="PDBsum" id="7Q0C"/>
<dbReference type="PDBsum" id="7Q0E"/>
<dbReference type="PDBsum" id="7QBH"/>
<dbReference type="PDBsum" id="7QGX"/>
<dbReference type="PDBsum" id="7QGY"/>
<dbReference type="PDBsum" id="7QGZ"/>
<dbReference type="PDBsum" id="7QNV"/>
<dbReference type="PDBsum" id="7QRK"/>
<dbReference type="PDBsum" id="7QSE"/>
<dbReference type="PDBsum" id="7QSI"/>
<dbReference type="PDBsum" id="7QZX"/>
<dbReference type="PDBsum" id="7R1X"/>
<dbReference type="PDBsum" id="7RNY"/>
<dbReference type="PDBsum" id="7RNZ"/>
<dbReference type="PDBsum" id="7RRE"/>
<dbReference type="PDBsum" id="7RRF"/>
<dbReference type="PDBsum" id="7SUW"/>
<dbReference type="PDBsum" id="7SUY"/>
<dbReference type="PDBsum" id="7SV1"/>
<dbReference type="PDBsum" id="7SV8"/>
<dbReference type="PDBsum" id="7U5W"/>
<dbReference type="PDBsum" id="7U5X"/>
<dbReference type="PDBsum" id="7Y2A"/>
<dbReference type="PDBsum" id="7Y2C"/>
<dbReference type="PDBsum" id="7Y2E"/>
<dbReference type="PDBsum" id="7Y2F"/>
<dbReference type="PDBsum" id="7Y2G"/>
<dbReference type="PDBsum" id="7Y2H"/>
<dbReference type="PDBsum" id="7Y2I"/>
<dbReference type="PDBsum" id="7Y2J"/>
<dbReference type="PDBsum" id="7Y2K"/>
<dbReference type="PDBsum" id="7Y2L"/>
<dbReference type="PDBsum" id="7Y2M"/>
<dbReference type="PDBsum" id="7Y2N"/>
<dbReference type="PDBsum" id="7Y2O"/>
<dbReference type="PDBsum" id="7Y2Q"/>
<dbReference type="PDBsum" id="7Y2R"/>
<dbReference type="PDBsum" id="7Y2S"/>
<dbReference type="PDBsum" id="7Y2T"/>
<dbReference type="PDBsum" id="7Y2U"/>
<dbReference type="PDBsum" id="7Y2V"/>
<dbReference type="PDBsum" id="7Y2W"/>
<dbReference type="PDBsum" id="7Y2X"/>
<dbReference type="PDBsum" id="7YWT"/>
<dbReference type="PDBsum" id="7ZL6"/>
<dbReference type="PDBsum" id="7ZWB"/>
<dbReference type="PDBsum" id="8AA6"/>
<dbReference type="PDBsum" id="8AAE"/>
<dbReference type="PDBsum" id="8B29"/>
<dbReference type="PDBsum" id="8BJX"/>
<dbReference type="PDBsum" id="8BOE"/>
<dbReference type="PDBsum" id="8BZZ"/>
<dbReference type="PDBsum" id="8C0Q"/>
<dbReference type="PDBsum" id="8C0R"/>
<dbReference type="PDBsum" id="8CA2"/>
<dbReference type="PDBsum" id="8CR0"/>
<dbReference type="PDBsum" id="8DJ9"/>
<dbReference type="PDBsum" id="8EM3"/>
<dbReference type="PDBsum" id="8EMU"/>
<dbReference type="PDBsum" id="8EXC"/>
<dbReference type="PDBsum" id="8EXG"/>
<dbReference type="PDBsum" id="8EYL"/>
<dbReference type="PDBsum" id="8FAL"/>
<dbReference type="PDBsum" id="8FAU"/>
<dbReference type="PDBsum" id="8FQX"/>
<dbReference type="PDBsum" id="8FQY"/>
<dbReference type="PDBsum" id="8FQZ"/>
<dbReference type="PDBsum" id="8FR1"/>
<dbReference type="PDBsum" id="8FR2"/>
<dbReference type="PDBsum" id="8FR4"/>
<dbReference type="PDBsum" id="8IGF"/>
<dbReference type="PDBsum" id="8J2O"/>
<dbReference type="PDBsum" id="8JEE"/>
<dbReference type="PDBsum" id="8OGD"/>
<dbReference type="PDBsum" id="8OGE"/>
<dbReference type="PDBsum" id="8OGF"/>
<dbReference type="PDBsum" id="8OKE"/>
<dbReference type="PDBsum" id="8OKG"/>
<dbReference type="PDBsum" id="8OKJ"/>
<dbReference type="PDBsum" id="8OKO"/>
<dbReference type="PDBsum" id="8OKP"/>
<dbReference type="PDBsum" id="8OKQ"/>
<dbReference type="PDBsum" id="8OKT"/>
<dbReference type="PDBsum" id="8OLA"/>
<dbReference type="PDBsum" id="8OLF"/>
<dbReference type="PDBsum" id="8OLI"/>
<dbReference type="PDBsum" id="8OLK"/>
<dbReference type="PDBsum" id="8OLM"/>
<dbReference type="PDBsum" id="8OMB"/>
<dbReference type="PDBsum" id="8OMH"/>
<dbReference type="PDBsum" id="8OMN"/>
<dbReference type="PDBsum" id="8OMP"/>
<dbReference type="PDBsum" id="8OO8"/>
<dbReference type="PDBsum" id="8OTP"/>
<dbReference type="PDBsum" id="8OUB"/>
<dbReference type="PDBsum" id="8P6U"/>
<dbReference type="PDBsum" id="8PHL"/>
<dbReference type="PDBsum" id="8PHM"/>
<dbReference type="PDBsum" id="8Q0C"/>
<dbReference type="PDBsum" id="8QF7"/>
<dbReference type="PDBsum" id="8QF9"/>
<dbReference type="PDBsum" id="8QFK"/>
<dbReference type="PDBsum" id="8QH8"/>
<dbReference type="PDBsum" id="8QHG"/>
<dbReference type="PDBsum" id="8QHJ"/>
<dbReference type="PDBsum" id="8QHO"/>
<dbReference type="PDBsum" id="8QKZ"/>
<dbReference type="PDBsum" id="8QQA"/>
<dbReference type="PDBsum" id="8QUF"/>
<dbReference type="PDBsum" id="8R1I"/>
<dbReference type="PDBsum" id="8R2F"/>
<dbReference type="PDBsum" id="8R2K"/>
<dbReference type="PDBsum" id="8RAR"/>
<dbReference type="PDBsum" id="8RBP"/>
<dbReference type="PDBsum" id="8RJ2"/>
<dbReference type="PDBsum" id="8RLP"/>
<dbReference type="PDBsum" id="8RLQ"/>
<dbReference type="PDBsum" id="8RNS"/>
<dbReference type="PDBsum" id="8ROU"/>
<dbReference type="PDBsum" id="8ROW"/>
<dbReference type="PDBsum" id="8SAF"/>
<dbReference type="PDBsum" id="8SAG"/>
<dbReference type="PDBsum" id="8SD1"/>
<dbReference type="PDBsum" id="8SD6"/>
<dbReference type="PDBsum" id="8SD7"/>
<dbReference type="PDBsum" id="8SD8"/>
<dbReference type="PDBsum" id="8SD9"/>
<dbReference type="PDBsum" id="8SF1"/>
<dbReference type="PDBsum" id="8TTR"/>
<dbReference type="PDBsum" id="8UFW"/>
<dbReference type="PDBsum" id="8UFX"/>
<dbReference type="PDBsum" id="8VZG"/>
<dbReference type="PDBsum" id="8WEP"/>
<dbReference type="PDBsum" id="8WER"/>
<dbReference type="PDBsum" id="8WES"/>
<dbReference type="PDBsum" id="8ZWV"/>
<dbReference type="PDBsum" id="9CA2"/>
<dbReference type="PDBsum" id="9F15"/>
<dbReference type="PDBsum" id="9F2E"/>
<dbReference type="PDBsum" id="9F2F"/>
<dbReference type="PDBsum" id="9G38"/>
<dbReference type="PDBsum" id="9GFV"/>
<dbReference type="PDBsum" id="9GFW"/>
<dbReference type="PDBsum" id="9GFX"/>
<dbReference type="PDBsum" id="9H3H"/>
<dbReference type="SMR" id="P00918"/>
<dbReference type="BioGRID" id="107215">
    <property type="interactions" value="67"/>
</dbReference>
<dbReference type="FunCoup" id="P00918">
    <property type="interactions" value="607"/>
</dbReference>
<dbReference type="IntAct" id="P00918">
    <property type="interactions" value="16"/>
</dbReference>
<dbReference type="MINT" id="P00918"/>
<dbReference type="STRING" id="9606.ENSP00000285379"/>
<dbReference type="BindingDB" id="P00918"/>
<dbReference type="ChEMBL" id="CHEMBL205"/>
<dbReference type="DrugBank" id="DB07596">
    <property type="generic name" value="(17beta)-17-(cyanomethyl)-2-methoxyestra-1(10),2,4-trien-3-yl sulfamate"/>
</dbReference>
<dbReference type="DrugBank" id="DB03333">
    <property type="generic name" value="(4-sulfamoyl-phenyl)-thiocarbamic acid O-(2-thiophen-3-yl-ethyl) ester"/>
</dbReference>
<dbReference type="DrugBank" id="DB08418">
    <property type="generic name" value="(4aS,4bR,10bS,12aS)-12a-methyl-1,3-dioxo-2-(pyridin-3-ylmethyl)-1,2,3,4,4a,4b,5,6,10b,11,12,12a-dodecahydronaphtho[2,1-f]isoquinolin-8-yl sulfamate"/>
</dbReference>
<dbReference type="DrugBank" id="DB04081">
    <property type="generic name" value="(4s-Trans)-4-(Methylamino)-5,6-Dihydro-6-Methyl-4h-Thieno(2,3-B)Thiopyran-2-Sulfonamide-7,7-Dioxide"/>
</dbReference>
<dbReference type="DrugBank" id="DB08416">
    <property type="generic name" value="(9BETA,13ALPHA,14BETA,17ALPHA)-2-METHOXYESTRA-1,3,5(10)-TRIENE-3,17-DIYL DISULFAMATE"/>
</dbReference>
<dbReference type="DrugBank" id="DB02479">
    <property type="generic name" value="(R)-N-(3-Indol-1-Yl-2-Methyl-Propyl)-4-Sulfamoyl-Benzamide"/>
</dbReference>
<dbReference type="DrugBank" id="DB07467">
    <property type="generic name" value="(S)-Indapamide"/>
</dbReference>
<dbReference type="DrugBank" id="DB03950">
    <property type="generic name" value="(S)-N-(3-Indol-1-Yl-2-Methyl-Propyl)-4-Sulfamoyl-Benzamide"/>
</dbReference>
<dbReference type="DrugBank" id="DB03594">
    <property type="generic name" value="1,2,4-Triazole"/>
</dbReference>
<dbReference type="DrugBank" id="DB02232">
    <property type="generic name" value="1,2-Dihydroxybenzene"/>
</dbReference>
<dbReference type="DrugBank" id="DB03294">
    <property type="generic name" value="1-Methyl-3-Oxo-1,3-Dihydro-Benzo[C]Isothiazole-5-Sulfonic Acid Amide"/>
</dbReference>
<dbReference type="DrugBank" id="DB04763">
    <property type="generic name" value="1-N-(4-SULFAMOYLPHENYL-ETHYL)-2,4,6-TRIMETHYLPYRIDINIUM"/>
</dbReference>
<dbReference type="DrugBank" id="DB03270">
    <property type="generic name" value="2,6-Difluorobenzenesulfonamide"/>
</dbReference>
<dbReference type="DrugBank" id="DB08083">
    <property type="generic name" value="2-(1,3-thiazol-4-yl)-1H-benzimidazole-5-sulfonamide"/>
</dbReference>
<dbReference type="DrugBank" id="DB06954">
    <property type="generic name" value="2-(cycloheptylmethyl)-1,1-dioxido-1-benzothiophen-6-yl sulfamate"/>
</dbReference>
<dbReference type="DrugBank" id="DB08659">
    <property type="generic name" value="2-(hydrazinocarbonyl)-3-phenyl-1H-indole-5-sulfonamide"/>
</dbReference>
<dbReference type="DrugBank" id="DB08046">
    <property type="generic name" value="2-chloro-5-[(1S)-1-hydroxy-3-oxo-2H-isoindol-1-yl]benzenesulfonamide"/>
</dbReference>
<dbReference type="DrugBank" id="DB02087">
    <property type="generic name" value="3,5-Difluorobenzenesulfonamide"/>
</dbReference>
<dbReference type="DrugBank" id="DB08156">
    <property type="generic name" value="3-[4-(AMINOSULFONYL)PHENYL]PROPANOIC ACID"/>
</dbReference>
<dbReference type="DrugBank" id="DB04203">
    <property type="generic name" value="3-Mercuri-4-Aminobenzenesulfonamide"/>
</dbReference>
<dbReference type="DrugBank" id="DB04394">
    <property type="generic name" value="3-Nitro-4-(2-Oxo-Pyrrolidin-1-Yl)-Benzenesulfonamide"/>
</dbReference>
<dbReference type="DrugBank" id="DB08782">
    <property type="generic name" value="4-(2-AMINOETHYL)BENZENESULFONAMIDE"/>
</dbReference>
<dbReference type="DrugBank" id="DB04549">
    <property type="generic name" value="4-(Aminosulfonyl)-N-[(2,3,4-Trifluorophenyl)Methyl]-Benzamide"/>
</dbReference>
<dbReference type="DrugBank" id="DB02221">
    <property type="generic name" value="4-(Aminosulfonyl)-N-[(2,4,6-Trifluorophenyl)Methyl]-Benzamide"/>
</dbReference>
<dbReference type="DrugBank" id="DB04180">
    <property type="generic name" value="4-(Aminosulfonyl)-N-[(2,4-Difluorophenyl)Methyl]-Benzamide"/>
</dbReference>
<dbReference type="DrugBank" id="DB03039">
    <property type="generic name" value="4-(Aminosulfonyl)-N-[(2,5-Difluorophenyl)Methyl]-Benzamide"/>
</dbReference>
<dbReference type="DrugBank" id="DB02861">
    <property type="generic name" value="4-(Aminosulfonyl)-N-[(3,4,5-Trifluorophenyl)Methyl]-Benzamide"/>
</dbReference>
<dbReference type="DrugBank" id="DB02429">
    <property type="generic name" value="4-(Aminosulfonyl)-N-[(4-Fluorophenyl)Methyl]-Benzamide"/>
</dbReference>
<dbReference type="DrugBank" id="DB08202">
    <property type="generic name" value="4-({[(4-METHYLPIPERAZIN-1-YL)AMINO]CARBONOTHIOYL}AMINO)BENZENESULFONAMIDE"/>
</dbReference>
<dbReference type="DrugBank" id="DB04600">
    <property type="generic name" value="4-[(3-BROMO-4-O-SULFAMOYLBENZYL)(4-CYANOPHENYL)AMINO]-4H-[1,2,4]-TRIAZOLE"/>
</dbReference>
<dbReference type="DrugBank" id="DB04601">
    <property type="generic name" value="4-[(4-O-SULFAMOYLBENZYL)(4-CYANOPHENYL)AMINO]-4H-[1,2,4]-TRIAZOLE"/>
</dbReference>
<dbReference type="DrugBank" id="DB01784">
    <property type="generic name" value="4-Flourobenzenesulfonamide"/>
</dbReference>
<dbReference type="DrugBank" id="DB03385">
    <property type="generic name" value="4-Methylimidazole"/>
</dbReference>
<dbReference type="DrugBank" id="DB04214">
    <property type="generic name" value="4-Nitrophenyl Phosphate"/>
</dbReference>
<dbReference type="DrugBank" id="DB03697">
    <property type="generic name" value="4-Sulfonamide-[1-(4-Aminobutane)]Benzamide"/>
</dbReference>
<dbReference type="DrugBank" id="DB04002">
    <property type="generic name" value="4-Sulfonamide-[4-(Thiomethylaminobutane)]Benzamide"/>
</dbReference>
<dbReference type="DrugBank" id="DB07632">
    <property type="generic name" value="5-(2-chlorophenyl)-1,3,4-thiadiazole-2-sulfonamide"/>
</dbReference>
<dbReference type="DrugBank" id="DB07050">
    <property type="generic name" value="5-[(phenylsulfonyl)amino]-1,3,4-thiadiazole-2-sulfonamide"/>
</dbReference>
<dbReference type="DrugBank" id="DB12348">
    <property type="generic name" value="5-amino-1,3,4-thiadiazole-2-thiol"/>
</dbReference>
<dbReference type="DrugBank" id="DB06891">
    <property type="generic name" value="5-{[(4-AMINO-3-CHLORO-5-FLUOROPHENYL)SULFONYL]AMINO}-1,3,4-THIADIAZOLE-2-SULFONAMIDE"/>
</dbReference>
<dbReference type="DrugBank" id="DB08645">
    <property type="generic name" value="6-CHLORO-3-(DICHLOROMETHYL)-3,4-DIHYDRO-2H-1,2,4-BENZOTHIADIAZINE-7-SULFONAMIDE 1,1-DIOXIDE"/>
</dbReference>
<dbReference type="DrugBank" id="DB08765">
    <property type="generic name" value="6-HYDROXY-1,3-BENZOTHIAZOLE-2-SULFONAMIDE"/>
</dbReference>
<dbReference type="DrugBank" id="DB14511">
    <property type="generic name" value="Acetate"/>
</dbReference>
<dbReference type="DrugBank" id="DB00819">
    <property type="generic name" value="Acetazolamide"/>
</dbReference>
<dbReference type="DrugBank" id="DB03877">
    <property type="generic name" value="AL-4623"/>
</dbReference>
<dbReference type="DrugBank" id="DB03262">
    <property type="generic name" value="Al-6619, [2h-Thieno[3,2-E]-1,2-Thiazine-6-Sulfonamide,2-(3-Hydroxyphenyl)-3-(4-Morpholinyl)-, 1,1-Dioxide]"/>
</dbReference>
<dbReference type="DrugBank" id="DB03598">
    <property type="generic name" value="Al-6629, [2h-Thieno[3,2-E]-1,2-Thiazine-6-Sulfonamide,2-(3-Methoxyphenyl)-3-(4-Morpholinyl)-, 1,1-Dioxide]"/>
</dbReference>
<dbReference type="DrugBank" id="DB04089">
    <property type="generic name" value="AL5300"/>
</dbReference>
<dbReference type="DrugBank" id="DB01964">
    <property type="generic name" value="AL5424"/>
</dbReference>
<dbReference type="DrugBank" id="DB03526">
    <property type="generic name" value="AL5927"/>
</dbReference>
<dbReference type="DrugBank" id="DB04371">
    <property type="generic name" value="AL6528"/>
</dbReference>
<dbReference type="DrugBank" id="DB02220">
    <property type="generic name" value="AL7089A"/>
</dbReference>
<dbReference type="DrugBank" id="DB03221">
    <property type="generic name" value="AL7099A"/>
</dbReference>
<dbReference type="DrugBank" id="DB02602">
    <property type="generic name" value="AL7182"/>
</dbReference>
<dbReference type="DrugBank" id="DB02535">
    <property type="generic name" value="Aminodi(Ethyloxy)Ethylaminocarbonylbenzenesulfonamide"/>
</dbReference>
<dbReference type="DrugBank" id="DB00436">
    <property type="generic name" value="Bendroflumethiazide"/>
</dbReference>
<dbReference type="DrugBank" id="DB00562">
    <property type="generic name" value="Benzthiazide"/>
</dbReference>
<dbReference type="DrugBank" id="DB01194">
    <property type="generic name" value="Brinzolamide"/>
</dbReference>
<dbReference type="DrugBank" id="DB16863">
    <property type="generic name" value="Butylated hydroxytoluene"/>
</dbReference>
<dbReference type="DrugBank" id="DB03854">
    <property type="generic name" value="Cadaverine"/>
</dbReference>
<dbReference type="DrugBank" id="DB00482">
    <property type="generic name" value="Celecoxib"/>
</dbReference>
<dbReference type="DrugBank" id="DB07556">
    <property type="generic name" value="CGS-27023"/>
</dbReference>
<dbReference type="DrugBank" id="DB00880">
    <property type="generic name" value="Chlorothiazide"/>
</dbReference>
<dbReference type="DrugBank" id="DB14086">
    <property type="generic name" value="Cianidanol"/>
</dbReference>
<dbReference type="DrugBank" id="DB04665">
    <property type="generic name" value="Coumarin"/>
</dbReference>
<dbReference type="DrugBank" id="DB11672">
    <property type="generic name" value="Curcumin"/>
</dbReference>
<dbReference type="DrugBank" id="DB02679">
    <property type="generic name" value="Cyanamide"/>
</dbReference>
<dbReference type="DrugBank" id="DB00606">
    <property type="generic name" value="Cyclothiazide"/>
</dbReference>
<dbReference type="DrugBank" id="DB02866">
    <property type="generic name" value="Dansylamide"/>
</dbReference>
<dbReference type="DrugBank" id="DB01144">
    <property type="generic name" value="Diclofenamide"/>
</dbReference>
<dbReference type="DrugBank" id="DB00869">
    <property type="generic name" value="Dorzolamide"/>
</dbReference>
<dbReference type="DrugBank" id="DB08846">
    <property type="generic name" value="Ellagic acid"/>
</dbReference>
<dbReference type="DrugBank" id="DB01031">
    <property type="generic name" value="Ethinamate"/>
</dbReference>
<dbReference type="DrugBank" id="DB00311">
    <property type="generic name" value="Ethoxzolamide"/>
</dbReference>
<dbReference type="DrugBank" id="DB08157">
    <property type="generic name" value="ETHYL 3-[4-(AMINOSULFONYL)PHENYL]PROPANOATE"/>
</dbReference>
<dbReference type="DrugBank" id="DB07767">
    <property type="generic name" value="Ferulic acid"/>
</dbReference>
<dbReference type="DrugBank" id="DB01942">
    <property type="generic name" value="Formic acid"/>
</dbReference>
<dbReference type="DrugBank" id="DB00695">
    <property type="generic name" value="Furosemide"/>
</dbReference>
<dbReference type="DrugBank" id="DB00774">
    <property type="generic name" value="Hydroflumethiazide"/>
</dbReference>
<dbReference type="DrugBank" id="DB08165">
    <property type="generic name" value="indane-5-sulfonamide"/>
</dbReference>
<dbReference type="DrugBank" id="DB12754">
    <property type="generic name" value="Iodide"/>
</dbReference>
<dbReference type="DrugBank" id="DB02292">
    <property type="generic name" value="Irosustat"/>
</dbReference>
<dbReference type="DrugBank" id="DB06795">
    <property type="generic name" value="Mafenide"/>
</dbReference>
<dbReference type="DrugBank" id="DB03345">
    <property type="generic name" value="Mercaptoethanol"/>
</dbReference>
<dbReference type="DrugBank" id="DB03975">
    <property type="generic name" value="Mercuribenzoic Acid"/>
</dbReference>
<dbReference type="DrugBank" id="DB00703">
    <property type="generic name" value="Methazolamide"/>
</dbReference>
<dbReference type="DrugBank" id="DB00232">
    <property type="generic name" value="Methyclothiazide"/>
</dbReference>
<dbReference type="DrugBank" id="DB02610">
    <property type="generic name" value="N-(2,3,4,5,6-Pentaflouro-Benzyl)-4-Sulfamoyl-Benzamide"/>
</dbReference>
<dbReference type="DrugBank" id="DB07742">
    <property type="generic name" value="N-(2,3-DIFLUORO-BENZYL)-4-SULFAMOYL-BENZAMIDE"/>
</dbReference>
<dbReference type="DrugBank" id="DB03844">
    <property type="generic name" value="N-(2,6-Diflouro-Benzyl)-4-Sulfamoyl-Benzamide"/>
</dbReference>
<dbReference type="DrugBank" id="DB02069">
    <property type="generic name" value="N-(2-Flouro-Benzyl)-4-Sulfamoyl-Benzamide"/>
</dbReference>
<dbReference type="DrugBank" id="DB02986">
    <property type="generic name" value="N-(2-Thienylmethyl)-2,5-Thiophenedisulfonamide"/>
</dbReference>
<dbReference type="DrugBank" id="DB08301">
    <property type="generic name" value="N-({[4-(AMINOSULFONYL)PHENYL]AMINO}CARBONYL)-4-METHYLBENZENESULFONAMIDE"/>
</dbReference>
<dbReference type="DrugBank" id="DB07048">
    <property type="generic name" value="N-[(2R)-5-(aminosulfonyl)-2,3-dihydro-1H-inden-2-yl]-2-propylpentanamide"/>
</dbReference>
<dbReference type="DrugBank" id="DB03596">
    <property type="generic name" value="N-[2-(1h-Indol-5-Yl)-Butyl]-4-Sulfamoyl-Benzamide"/>
</dbReference>
<dbReference type="DrugBank" id="DB07476">
    <property type="generic name" value="N-[4-(AMINOSULFONYL)PHENYL]-2-MERCAPTOBENZAMIDE"/>
</dbReference>
<dbReference type="DrugBank" id="DB01748">
    <property type="generic name" value="N-Benzyl-4-Sulfamoyl-Benzamide"/>
</dbReference>
<dbReference type="DrugBank" id="DB08155">
    <property type="generic name" value="N-{2-[4-(AMINOSULFONYL)PHENYL]ETHYL}ACETAMIDE"/>
</dbReference>
<dbReference type="DrugBank" id="DB14049">
    <property type="generic name" value="Nitrate"/>
</dbReference>
<dbReference type="DrugBank" id="DB04066">
    <property type="generic name" value="p-Coumaric acid"/>
</dbReference>
<dbReference type="DrugBank" id="DB01671">
    <property type="generic name" value="p-Hydroxymercuribenzoic acid"/>
</dbReference>
<dbReference type="DrugBank" id="DB17299">
    <property type="generic name" value="p-Toluenesulfonamide"/>
</dbReference>
<dbReference type="DrugBank" id="DB13495">
    <property type="generic name" value="Paraoxon"/>
</dbReference>
<dbReference type="DrugBank" id="DB03255">
    <property type="generic name" value="Phenol"/>
</dbReference>
<dbReference type="DrugBank" id="DB07710">
    <property type="generic name" value="PHENYLALANYLAMINODI(ETHYLOXY)ETHYL BENZENESULFONAMIDEAMINOCARBONYLBENZENESULFONAMIDE"/>
</dbReference>
<dbReference type="DrugBank" id="DB01795">
    <property type="generic name" value="Phenylboronic acid"/>
</dbReference>
<dbReference type="DrugBank" id="DB01963">
    <property type="generic name" value="Phenylethane Boronic Acid"/>
</dbReference>
<dbReference type="DrugBank" id="DB12399">
    <property type="generic name" value="Polmacoxib"/>
</dbReference>
<dbReference type="DrugBank" id="DB01325">
    <property type="generic name" value="Quinethazone"/>
</dbReference>
<dbReference type="DrugBank" id="DB11085">
    <property type="generic name" value="Resorcinol"/>
</dbReference>
<dbReference type="DrugBank" id="DB12418">
    <property type="generic name" value="Saccharin"/>
</dbReference>
<dbReference type="DrugBank" id="DB00936">
    <property type="generic name" value="Salicylic acid"/>
</dbReference>
<dbReference type="DrugBank" id="DB09460">
    <property type="generic name" value="Sodium carbonate"/>
</dbReference>
<dbReference type="DrugBank" id="DB09472">
    <property type="generic name" value="Sodium sulfate"/>
</dbReference>
<dbReference type="DrugBank" id="DB02894">
    <property type="generic name" value="Sulfamic Acid 2,3-O-(1-Methylethylidene)-4,5-O-Sulfonyl-Beta-Fructopyranose Ester"/>
</dbReference>
<dbReference type="DrugBank" id="DB00391">
    <property type="generic name" value="Sulpiride"/>
</dbReference>
<dbReference type="DrugBank" id="DB08329">
    <property type="generic name" value="Sulthiame"/>
</dbReference>
<dbReference type="DrugBank" id="DB07363">
    <property type="generic name" value="THIOPHENE-2,5-DISULFONIC ACID 2-AMIDE-5-(4-METHYL-BENZYLAMIDE)"/>
</dbReference>
<dbReference type="DrugBank" id="DB13343">
    <property type="generic name" value="Tioxolone"/>
</dbReference>
<dbReference type="DrugBank" id="DB00273">
    <property type="generic name" value="Topiramate"/>
</dbReference>
<dbReference type="DrugBank" id="DB01650">
    <property type="generic name" value="trans-2-hydroxycinnamic acid"/>
</dbReference>
<dbReference type="DrugBank" id="DB01021">
    <property type="generic name" value="Trichlormethiazide"/>
</dbReference>
<dbReference type="DrugBank" id="DB03904">
    <property type="generic name" value="Urea"/>
</dbReference>
<dbReference type="DrugBank" id="DB00580">
    <property type="generic name" value="Valdecoxib"/>
</dbReference>
<dbReference type="DrugBank" id="DB14533">
    <property type="generic name" value="Zinc chloride"/>
</dbReference>
<dbReference type="DrugBank" id="DB14548">
    <property type="generic name" value="Zinc sulfate, unspecified form"/>
</dbReference>
<dbReference type="DrugBank" id="DB00909">
    <property type="generic name" value="Zonisamide"/>
</dbReference>
<dbReference type="DrugCentral" id="P00918"/>
<dbReference type="GuidetoPHARMACOLOGY" id="3092"/>
<dbReference type="GlyGen" id="P00918">
    <property type="glycosylation" value="2 sites, 1 O-linked glycan (1 site)"/>
</dbReference>
<dbReference type="iPTMnet" id="P00918"/>
<dbReference type="PhosphoSitePlus" id="P00918"/>
<dbReference type="BioMuta" id="CA2"/>
<dbReference type="OGP" id="P00918"/>
<dbReference type="REPRODUCTION-2DPAGE" id="IPI00218414"/>
<dbReference type="REPRODUCTION-2DPAGE" id="P00918"/>
<dbReference type="CPTAC" id="CPTAC-177"/>
<dbReference type="CPTAC" id="CPTAC-178"/>
<dbReference type="jPOST" id="P00918"/>
<dbReference type="MassIVE" id="P00918"/>
<dbReference type="PaxDb" id="9606-ENSP00000285379"/>
<dbReference type="PeptideAtlas" id="P00918"/>
<dbReference type="ProteomicsDB" id="51292"/>
<dbReference type="Pumba" id="P00918"/>
<dbReference type="Antibodypedia" id="677">
    <property type="antibodies" value="707 antibodies from 43 providers"/>
</dbReference>
<dbReference type="DNASU" id="760"/>
<dbReference type="Ensembl" id="ENST00000285379.10">
    <property type="protein sequence ID" value="ENSP00000285379.4"/>
    <property type="gene ID" value="ENSG00000104267.10"/>
</dbReference>
<dbReference type="GeneID" id="760"/>
<dbReference type="KEGG" id="hsa:760"/>
<dbReference type="MANE-Select" id="ENST00000285379.10">
    <property type="protein sequence ID" value="ENSP00000285379.4"/>
    <property type="RefSeq nucleotide sequence ID" value="NM_000067.3"/>
    <property type="RefSeq protein sequence ID" value="NP_000058.1"/>
</dbReference>
<dbReference type="AGR" id="HGNC:1373"/>
<dbReference type="CTD" id="760"/>
<dbReference type="DisGeNET" id="760"/>
<dbReference type="GeneCards" id="CA2"/>
<dbReference type="HGNC" id="HGNC:1373">
    <property type="gene designation" value="CA2"/>
</dbReference>
<dbReference type="HPA" id="ENSG00000104267">
    <property type="expression patterns" value="Tissue enhanced (choroid plexus, intestine, stomach)"/>
</dbReference>
<dbReference type="MalaCards" id="CA2"/>
<dbReference type="MIM" id="259730">
    <property type="type" value="phenotype"/>
</dbReference>
<dbReference type="MIM" id="611492">
    <property type="type" value="gene"/>
</dbReference>
<dbReference type="neXtProt" id="NX_P00918"/>
<dbReference type="OpenTargets" id="ENSG00000104267"/>
<dbReference type="Orphanet" id="2785">
    <property type="disease" value="Osteopetrosis with renal tubular acidosis"/>
</dbReference>
<dbReference type="PharmGKB" id="PA25989"/>
<dbReference type="VEuPathDB" id="HostDB:ENSG00000104267"/>
<dbReference type="eggNOG" id="KOG0382">
    <property type="taxonomic scope" value="Eukaryota"/>
</dbReference>
<dbReference type="GeneTree" id="ENSGT00940000160385"/>
<dbReference type="HOGENOM" id="CLU_039326_2_1_1"/>
<dbReference type="InParanoid" id="P00918"/>
<dbReference type="OMA" id="INPHWKV"/>
<dbReference type="OrthoDB" id="429145at2759"/>
<dbReference type="PAN-GO" id="P00918">
    <property type="GO annotations" value="7 GO annotations based on evolutionary models"/>
</dbReference>
<dbReference type="PhylomeDB" id="P00918"/>
<dbReference type="TreeFam" id="TF316425"/>
<dbReference type="BRENDA" id="4.2.1.1">
    <property type="organism ID" value="2681"/>
</dbReference>
<dbReference type="PathwayCommons" id="P00918"/>
<dbReference type="Reactome" id="R-HSA-1237044">
    <property type="pathway name" value="Erythrocytes take up carbon dioxide and release oxygen"/>
</dbReference>
<dbReference type="Reactome" id="R-HSA-1247673">
    <property type="pathway name" value="Erythrocytes take up oxygen and release carbon dioxide"/>
</dbReference>
<dbReference type="Reactome" id="R-HSA-1475029">
    <property type="pathway name" value="Reversible hydration of carbon dioxide"/>
</dbReference>
<dbReference type="SABIO-RK" id="P00918"/>
<dbReference type="SignaLink" id="P00918"/>
<dbReference type="BioGRID-ORCS" id="760">
    <property type="hits" value="14 hits in 1166 CRISPR screens"/>
</dbReference>
<dbReference type="CD-CODE" id="FB4E32DD">
    <property type="entry name" value="Presynaptic clusters and postsynaptic densities"/>
</dbReference>
<dbReference type="ChiTaRS" id="CA2">
    <property type="organism name" value="human"/>
</dbReference>
<dbReference type="EvolutionaryTrace" id="P00918"/>
<dbReference type="GeneWiki" id="Carbonic_anhydrase_II"/>
<dbReference type="GenomeRNAi" id="760"/>
<dbReference type="Pharos" id="P00918">
    <property type="development level" value="Tclin"/>
</dbReference>
<dbReference type="PRO" id="PR:P00918"/>
<dbReference type="Proteomes" id="UP000005640">
    <property type="component" value="Chromosome 8"/>
</dbReference>
<dbReference type="RNAct" id="P00918">
    <property type="molecule type" value="protein"/>
</dbReference>
<dbReference type="Bgee" id="ENSG00000104267">
    <property type="expression patterns" value="Expressed in colonic mucosa and 191 other cell types or tissues"/>
</dbReference>
<dbReference type="ExpressionAtlas" id="P00918">
    <property type="expression patterns" value="baseline and differential"/>
</dbReference>
<dbReference type="GO" id="GO:0045177">
    <property type="term" value="C:apical part of cell"/>
    <property type="evidence" value="ECO:0000314"/>
    <property type="project" value="UniProtKB"/>
</dbReference>
<dbReference type="GO" id="GO:0005737">
    <property type="term" value="C:cytoplasm"/>
    <property type="evidence" value="ECO:0000314"/>
    <property type="project" value="UniProtKB"/>
</dbReference>
<dbReference type="GO" id="GO:0005829">
    <property type="term" value="C:cytosol"/>
    <property type="evidence" value="ECO:0000304"/>
    <property type="project" value="Reactome"/>
</dbReference>
<dbReference type="GO" id="GO:0070062">
    <property type="term" value="C:extracellular exosome"/>
    <property type="evidence" value="ECO:0007005"/>
    <property type="project" value="UniProtKB"/>
</dbReference>
<dbReference type="GO" id="GO:0043209">
    <property type="term" value="C:myelin sheath"/>
    <property type="evidence" value="ECO:0007669"/>
    <property type="project" value="Ensembl"/>
</dbReference>
<dbReference type="GO" id="GO:0005886">
    <property type="term" value="C:plasma membrane"/>
    <property type="evidence" value="ECO:0000314"/>
    <property type="project" value="UniProtKB"/>
</dbReference>
<dbReference type="GO" id="GO:0004064">
    <property type="term" value="F:arylesterase activity"/>
    <property type="evidence" value="ECO:0000315"/>
    <property type="project" value="CACAO"/>
</dbReference>
<dbReference type="GO" id="GO:0004089">
    <property type="term" value="F:carbonate dehydratase activity"/>
    <property type="evidence" value="ECO:0000315"/>
    <property type="project" value="UniProtKB"/>
</dbReference>
<dbReference type="GO" id="GO:0018820">
    <property type="term" value="F:cyanamide hydratase activity"/>
    <property type="evidence" value="ECO:0007669"/>
    <property type="project" value="RHEA"/>
</dbReference>
<dbReference type="GO" id="GO:0008270">
    <property type="term" value="F:zinc ion binding"/>
    <property type="evidence" value="ECO:0000314"/>
    <property type="project" value="UniProtKB"/>
</dbReference>
<dbReference type="GO" id="GO:0038166">
    <property type="term" value="P:angiotensin-activated signaling pathway"/>
    <property type="evidence" value="ECO:0000314"/>
    <property type="project" value="UniProtKB"/>
</dbReference>
<dbReference type="GO" id="GO:0015670">
    <property type="term" value="P:carbon dioxide transport"/>
    <property type="evidence" value="ECO:0000318"/>
    <property type="project" value="GO_Central"/>
</dbReference>
<dbReference type="GO" id="GO:0002009">
    <property type="term" value="P:morphogenesis of an epithelium"/>
    <property type="evidence" value="ECO:0007669"/>
    <property type="project" value="Ensembl"/>
</dbReference>
<dbReference type="GO" id="GO:0070050">
    <property type="term" value="P:neuron cellular homeostasis"/>
    <property type="evidence" value="ECO:0007669"/>
    <property type="project" value="Ensembl"/>
</dbReference>
<dbReference type="GO" id="GO:0032849">
    <property type="term" value="P:positive regulation of cellular pH reduction"/>
    <property type="evidence" value="ECO:0007669"/>
    <property type="project" value="Ensembl"/>
</dbReference>
<dbReference type="GO" id="GO:2001150">
    <property type="term" value="P:positive regulation of dipeptide transmembrane transport"/>
    <property type="evidence" value="ECO:0000250"/>
    <property type="project" value="UniProtKB"/>
</dbReference>
<dbReference type="GO" id="GO:0032230">
    <property type="term" value="P:positive regulation of synaptic transmission, GABAergic"/>
    <property type="evidence" value="ECO:0007669"/>
    <property type="project" value="Ensembl"/>
</dbReference>
<dbReference type="GO" id="GO:2001225">
    <property type="term" value="P:regulation of chloride transport"/>
    <property type="evidence" value="ECO:0007669"/>
    <property type="project" value="Ensembl"/>
</dbReference>
<dbReference type="GO" id="GO:0051453">
    <property type="term" value="P:regulation of intracellular pH"/>
    <property type="evidence" value="ECO:0000250"/>
    <property type="project" value="UniProtKB"/>
</dbReference>
<dbReference type="GO" id="GO:0044070">
    <property type="term" value="P:regulation of monoatomic anion transport"/>
    <property type="evidence" value="ECO:0000314"/>
    <property type="project" value="UniProtKB"/>
</dbReference>
<dbReference type="GO" id="GO:0046903">
    <property type="term" value="P:secretion"/>
    <property type="evidence" value="ECO:0007669"/>
    <property type="project" value="Ensembl"/>
</dbReference>
<dbReference type="CDD" id="cd03119">
    <property type="entry name" value="alpha_CA_I_II_III_XIII"/>
    <property type="match status" value="1"/>
</dbReference>
<dbReference type="FunFam" id="3.10.200.10:FF:000001">
    <property type="entry name" value="Carbonic anhydrase 2"/>
    <property type="match status" value="1"/>
</dbReference>
<dbReference type="Gene3D" id="3.10.200.10">
    <property type="entry name" value="Alpha carbonic anhydrase"/>
    <property type="match status" value="1"/>
</dbReference>
<dbReference type="InterPro" id="IPR001148">
    <property type="entry name" value="CA_dom"/>
</dbReference>
<dbReference type="InterPro" id="IPR036398">
    <property type="entry name" value="CA_dom_sf"/>
</dbReference>
<dbReference type="InterPro" id="IPR023561">
    <property type="entry name" value="Carbonic_anhydrase_a-class"/>
</dbReference>
<dbReference type="InterPro" id="IPR018338">
    <property type="entry name" value="Carbonic_anhydrase_a-class_CS"/>
</dbReference>
<dbReference type="PANTHER" id="PTHR18952">
    <property type="entry name" value="CARBONIC ANHYDRASE"/>
    <property type="match status" value="1"/>
</dbReference>
<dbReference type="PANTHER" id="PTHR18952:SF120">
    <property type="entry name" value="CARBONIC ANHYDRASE 2"/>
    <property type="match status" value="1"/>
</dbReference>
<dbReference type="Pfam" id="PF00194">
    <property type="entry name" value="Carb_anhydrase"/>
    <property type="match status" value="1"/>
</dbReference>
<dbReference type="SMART" id="SM01057">
    <property type="entry name" value="Carb_anhydrase"/>
    <property type="match status" value="1"/>
</dbReference>
<dbReference type="SUPFAM" id="SSF51069">
    <property type="entry name" value="Carbonic anhydrase"/>
    <property type="match status" value="1"/>
</dbReference>
<dbReference type="PROSITE" id="PS00162">
    <property type="entry name" value="ALPHA_CA_1"/>
    <property type="match status" value="1"/>
</dbReference>
<dbReference type="PROSITE" id="PS51144">
    <property type="entry name" value="ALPHA_CA_2"/>
    <property type="match status" value="1"/>
</dbReference>
<protein>
    <recommendedName>
        <fullName>Carbonic anhydrase 2</fullName>
        <ecNumber evidence="10 19 48 49 64 66 81">4.2.1.1</ecNumber>
    </recommendedName>
    <alternativeName>
        <fullName>Carbonate dehydratase II</fullName>
    </alternativeName>
    <alternativeName>
        <fullName>Carbonic anhydrase C</fullName>
        <shortName>CAC</shortName>
    </alternativeName>
    <alternativeName>
        <fullName>Carbonic anhydrase II</fullName>
        <shortName>CA-II</shortName>
    </alternativeName>
    <alternativeName>
        <fullName evidence="83">Cyanamide hydratase CA2</fullName>
        <ecNumber evidence="3">4.2.1.69</ecNumber>
    </alternativeName>
</protein>
<keyword id="KW-0002">3D-structure</keyword>
<keyword id="KW-0007">Acetylation</keyword>
<keyword id="KW-1003">Cell membrane</keyword>
<keyword id="KW-0963">Cytoplasm</keyword>
<keyword id="KW-0903">Direct protein sequencing</keyword>
<keyword id="KW-0225">Disease variant</keyword>
<keyword id="KW-0456">Lyase</keyword>
<keyword id="KW-0472">Membrane</keyword>
<keyword id="KW-0479">Metal-binding</keyword>
<keyword id="KW-0987">Osteopetrosis</keyword>
<keyword id="KW-0597">Phosphoprotein</keyword>
<keyword id="KW-1267">Proteomics identification</keyword>
<keyword id="KW-1185">Reference proteome</keyword>
<keyword id="KW-0862">Zinc</keyword>
<sequence length="260" mass="29246">MSHHWGYGKHNGPEHWHKDFPIAKGERQSPVDIDTHTAKYDPSLKPLSVSYDQATSLRILNNGHAFNVEFDDSQDKAVLKGGPLDGTYRLIQFHFHWGSLDGQGSEHTVDKKKYAAELHLVHWNTKYGDFGKAVQQPDGLAVLGIFLKVGSAKPGLQKVVDVLDSIKTKGKSADFTNFDPRGLLPESLDYWTYPGSLTTPPLLECVTWIVLKEPISVSSEQVLKFRKLNFNGEGEPEELMVDNWRPAQPLKNRQIKASFK</sequence>
<name>CAH2_HUMAN</name>
<feature type="initiator methionine" description="Removed" evidence="60 68">
    <location>
        <position position="1"/>
    </location>
</feature>
<feature type="chain" id="PRO_0000077418" description="Carbonic anhydrase 2">
    <location>
        <begin position="2"/>
        <end position="260"/>
    </location>
</feature>
<feature type="domain" description="Alpha-carbonic anhydrase" evidence="2">
    <location>
        <begin position="3"/>
        <end position="259"/>
    </location>
</feature>
<feature type="active site" description="Proton donor/acceptor" evidence="84 85">
    <location>
        <position position="64"/>
    </location>
</feature>
<feature type="binding site" evidence="5 11 12 13 48 56 58 59 61 64 65 66 67 69 70 71 72 73 74 76 78 81 82">
    <location>
        <position position="94"/>
    </location>
    <ligand>
        <name>Zn(2+)</name>
        <dbReference type="ChEBI" id="CHEBI:29105"/>
        <note>catalytic</note>
    </ligand>
</feature>
<feature type="binding site" evidence="5 11 12 13 48 56 58 59 64 65 66 67 69 70 71 72 73 74 76 78 81 82">
    <location>
        <position position="96"/>
    </location>
    <ligand>
        <name>Zn(2+)</name>
        <dbReference type="ChEBI" id="CHEBI:29105"/>
        <note>catalytic</note>
    </ligand>
</feature>
<feature type="binding site" evidence="5 11 12 13 48 56 58 59 64 65 66 67 69 70 71 72 73 74 76 78 81 82">
    <location>
        <position position="119"/>
    </location>
    <ligand>
        <name>Zn(2+)</name>
        <dbReference type="ChEBI" id="CHEBI:29105"/>
        <note>catalytic</note>
    </ligand>
</feature>
<feature type="binding site" evidence="3 55">
    <location>
        <begin position="198"/>
        <end position="199"/>
    </location>
    <ligand>
        <name>substrate</name>
    </ligand>
</feature>
<feature type="site" description="Fine-tunes the proton-transfer properties of H-64" evidence="85">
    <location>
        <position position="7"/>
    </location>
</feature>
<feature type="site" description="Fine-tunes the proton-transfer properties of H-64; involved in the binding of some activators, including histamine and L-histidine" evidence="26 80 85">
    <location>
        <position position="62"/>
    </location>
</feature>
<feature type="site" description="Fine-tunes the proton-transfer properties of H-64; involved in the binding of some activators, including histamine and L-histidine" evidence="26 80 85">
    <location>
        <position position="67"/>
    </location>
</feature>
<feature type="site" description="Involved in the binding of some activators, including histamine and L-histidine" evidence="26 80 85">
    <location>
        <position position="92"/>
    </location>
</feature>
<feature type="modified residue" description="N-acetylserine" evidence="60 68">
    <location>
        <position position="2"/>
    </location>
</feature>
<feature type="modified residue" description="Phosphoserine" evidence="1">
    <location>
        <position position="2"/>
    </location>
</feature>
<feature type="modified residue" description="Phosphoserine" evidence="86">
    <location>
        <position position="165"/>
    </location>
</feature>
<feature type="modified residue" description="Phosphoserine" evidence="86">
    <location>
        <position position="172"/>
    </location>
</feature>
<feature type="sequence variant" id="VAR_001380" description="In Jogjakarta; dbSNP:rs118203931." evidence="63">
    <original>K</original>
    <variation>E</variation>
    <location>
        <position position="18"/>
    </location>
</feature>
<feature type="sequence variant" id="VAR_001381" description="In OPTB3; in Czechoslovakia; dbSNP:rs1304160279." evidence="19 79">
    <original>Q</original>
    <variation>P</variation>
    <location>
        <position position="92"/>
    </location>
</feature>
<feature type="sequence variant" id="VAR_021009" description="In OPTB3; partial loss of activity." evidence="19">
    <original>H</original>
    <variation>Y</variation>
    <location>
        <position position="94"/>
    </location>
</feature>
<feature type="sequence variant" id="VAR_001382" description="In OPTB3; dbSNP:rs118203933." evidence="19 20 53 77">
    <original>H</original>
    <variation>Y</variation>
    <location>
        <position position="107"/>
    </location>
</feature>
<feature type="sequence variant" id="VAR_021010" description="In OPTB3; complete loss of activity." evidence="19">
    <original>G</original>
    <variation>R</variation>
    <location>
        <position position="144"/>
    </location>
</feature>
<feature type="sequence variant" id="VAR_001383" description="In Melbourne; dbSNP:rs118203932." evidence="62">
    <original>P</original>
    <variation>H</variation>
    <location>
        <position position="236"/>
    </location>
</feature>
<feature type="sequence variant" id="VAR_001384" description="In dbSNP:rs2228063.">
    <original>N</original>
    <variation>D</variation>
    <location>
        <position position="252"/>
    </location>
</feature>
<feature type="mutagenesis site" description="Impaired activity, not rescued by 4-methylimidazole (4-MI); when associated with W-64." evidence="31">
    <original>W</original>
    <variation>A</variation>
    <location>
        <position position="5"/>
    </location>
</feature>
<feature type="mutagenesis site" description="Enhanced activity." evidence="10 35">
    <original>Y</original>
    <variation>F</variation>
    <location>
        <position position="7"/>
    </location>
</feature>
<feature type="mutagenesis site" description="Reduced proton transfer rate." evidence="10 35">
    <original>Y</original>
    <variation>H</variation>
    <location>
        <position position="7"/>
    </location>
</feature>
<feature type="mutagenesis site" description="Reduced activity." evidence="47">
    <original>N</original>
    <variation>A</variation>
    <location>
        <position position="62"/>
    </location>
</feature>
<feature type="mutagenesis site" description="Strongly reduced activity." evidence="47">
    <original>N</original>
    <variation>D</variation>
    <location>
        <position position="62"/>
    </location>
</feature>
<feature type="mutagenesis site" description="Reduced proton transfer; when associated with A-64." evidence="22 35 47">
    <original>N</original>
    <variation>H</variation>
    <location>
        <position position="62"/>
    </location>
</feature>
<feature type="mutagenesis site" description="Reduced activity." evidence="35 47">
    <original>N</original>
    <variation>L</variation>
    <location>
        <position position="62"/>
    </location>
</feature>
<feature type="mutagenesis site" description="Reduced activity." evidence="47">
    <original>N</original>
    <variation>T</variation>
    <location>
        <position position="62"/>
    </location>
</feature>
<feature type="mutagenesis site" description="Reduced activity." evidence="47">
    <original>N</original>
    <variation>V</variation>
    <location>
        <position position="62"/>
    </location>
</feature>
<feature type="mutagenesis site" description="Reduced CO(2) hydrase activity, rescued by 4-methylimidazole (4-MI). Reduced proton transfer; when associated with H-62. Enhanced proton transfer; when associated with H-67. Enhanced proton transfer capacity; when associated with H-99." evidence="6 22 25 31">
    <original>H</original>
    <variation>A</variation>
    <location>
        <position position="64"/>
    </location>
</feature>
<feature type="mutagenesis site" description="Impaired activity, not rescued by 4-methylimidazole (4-MI)." evidence="6 25 31">
    <original>H</original>
    <variation>G</variation>
    <location>
        <position position="64"/>
    </location>
</feature>
<feature type="mutagenesis site" description="Impaired activity, rescued by 4-methylimidazole (4-MI). Impaired activity, not rescued by 4-methylimidazole (4-MI); when associated with A-5." evidence="6 25 31">
    <original>H</original>
    <variation>W</variation>
    <location>
        <position position="64"/>
    </location>
</feature>
<feature type="mutagenesis site" description="Reduced activity.">
    <original>A</original>
    <variation>F</variation>
    <location>
        <position position="65"/>
    </location>
</feature>
<feature type="mutagenesis site" description="2-fold decrease in enzyme efficiency, as determined by kcat/KM ratio, and efficiently inhibited by chlorzolamide; when associated with Q-67." evidence="50">
    <original>A</original>
    <variation>S</variation>
    <location>
        <position position="65"/>
    </location>
</feature>
<feature type="mutagenesis site" description="Enhanced proton transfer; when associated with A-64." evidence="22">
    <original>N</original>
    <variation>H</variation>
    <location>
        <position position="67"/>
    </location>
</feature>
<feature type="mutagenesis site" description="Reduced activity." evidence="35">
    <original>N</original>
    <variation>L</variation>
    <location>
        <position position="67"/>
    </location>
</feature>
<feature type="mutagenesis site" description="2-fold decrease in enzyme efficiency, as determined by kcat/KM ratio, and efficiently inhibited by chlorzolamide; when associated with S-65." evidence="50">
    <original>N</original>
    <variation>Q</variation>
    <location>
        <position position="67"/>
    </location>
</feature>
<feature type="mutagenesis site" description="Strongly reduced CO(2) hydrase and p-nitrophenyl acetate esterase activities, impaired stability of zinc binding." evidence="72 81">
    <original>H</original>
    <variation>C</variation>
    <variation>D</variation>
    <variation>E</variation>
    <variation>N</variation>
    <variation>Q</variation>
    <location>
        <position position="94"/>
    </location>
</feature>
<feature type="mutagenesis site" description="Strongly reduced CO(2) hydrase activity." evidence="18 66">
    <original>E</original>
    <variation>A</variation>
    <variation>Q</variation>
    <location>
        <position position="106"/>
    </location>
</feature>
<feature type="mutagenesis site" description="Normal CO(2) hydrase activity." evidence="18 66">
    <original>E</original>
    <variation>D</variation>
    <location>
        <position position="106"/>
    </location>
</feature>
<feature type="mutagenesis site" description="Strongly reduced activity and sulfonamide affinity." evidence="76">
    <original>E</original>
    <variation>Q</variation>
    <location>
        <position position="117"/>
    </location>
</feature>
<feature type="mutagenesis site" description="Reduced activity." evidence="81">
    <original>H</original>
    <variation>D</variation>
    <variation>N</variation>
    <variation>Q</variation>
    <location>
        <position position="119"/>
    </location>
</feature>
<feature type="mutagenesis site" description="Strongly reduced activity." evidence="81">
    <original>H</original>
    <variation>E</variation>
    <location>
        <position position="119"/>
    </location>
</feature>
<feature type="mutagenesis site" description="Reduced CO(2) hydrase and p-nitrophenyl acetate esterase activities." evidence="49">
    <original>V</original>
    <variation>A</variation>
    <variation>G</variation>
    <variation>I</variation>
    <variation>L</variation>
    <variation>S</variation>
    <location>
        <position position="121"/>
    </location>
</feature>
<feature type="mutagenesis site" description="Strongly reduced CO(2) hydrase and p-nitrophenyl acetate esterase activities." evidence="49">
    <original>V</original>
    <variation>K</variation>
    <variation>R</variation>
    <location>
        <position position="121"/>
    </location>
</feature>
<feature type="mutagenesis site" description="Strongly impaired activity." evidence="54">
    <original>V</original>
    <variation>F</variation>
    <variation>Y</variation>
    <location>
        <position position="142"/>
    </location>
</feature>
<feature type="mutagenesis site" description="Weakly impaired activity." evidence="54">
    <original>V</original>
    <variation>G</variation>
    <location>
        <position position="142"/>
    </location>
</feature>
<feature type="mutagenesis site" description="Impaired activity." evidence="54">
    <original>V</original>
    <variation>H</variation>
    <location>
        <position position="142"/>
    </location>
</feature>
<feature type="mutagenesis site" description="Reduced CO(2) hydrase activity." evidence="75">
    <original>L</original>
    <variation>A</variation>
    <location>
        <position position="197"/>
    </location>
</feature>
<feature type="mutagenesis site" description="Strongly reduced CO(2) hydrase activity." evidence="75">
    <original>L</original>
    <variation>E</variation>
    <variation>H</variation>
    <variation>R</variation>
    <location>
        <position position="197"/>
    </location>
</feature>
<feature type="mutagenesis site" description="Normal activity." evidence="75">
    <original>L</original>
    <variation>F</variation>
    <location>
        <position position="197"/>
    </location>
</feature>
<feature type="mutagenesis site" description="Strongly reduced activity." evidence="9 64 66 69 71">
    <original>T</original>
    <variation>A</variation>
    <variation>C</variation>
    <variation>H</variation>
    <variation>P</variation>
    <location>
        <position position="198"/>
    </location>
</feature>
<feature type="mutagenesis site" description="Strongly reduced activity, but enhanced zinc affinity." evidence="9 64 66 69 71">
    <original>T</original>
    <variation>D</variation>
    <variation>E</variation>
    <location>
        <position position="198"/>
    </location>
</feature>
<feature type="mutagenesis site" description="Reduced activity." evidence="9 64 66 69 71">
    <original>T</original>
    <variation>S</variation>
    <variation>V</variation>
    <location>
        <position position="198"/>
    </location>
</feature>
<feature type="mutagenesis site" description="Higher affinity for bicarbonate. Enhanced proton transfer capacity; when associated with A-64." evidence="25 48 73">
    <original>T</original>
    <variation>H</variation>
    <location>
        <position position="199"/>
    </location>
</feature>
<feature type="mutagenesis site" description="Enhanced p-nitrophenyl acetate esterase activity, but normal CO(2) hydrase activity." evidence="25 48 73">
    <original>T</original>
    <variation>S</variation>
    <location>
        <position position="199"/>
    </location>
</feature>
<feature type="mutagenesis site" description="Normal CO(2) hydrase activity, but impaired stability." evidence="67">
    <original>P</original>
    <variation>A</variation>
    <location>
        <position position="201"/>
    </location>
</feature>
<feature type="sequence conflict" description="In Ref. 6; AAH11949." evidence="83" ref="6">
    <original>DP</original>
    <variation>AA</variation>
    <location>
        <begin position="179"/>
        <end position="180"/>
    </location>
</feature>
<feature type="strand" evidence="93">
    <location>
        <begin position="6"/>
        <end position="8"/>
    </location>
</feature>
<feature type="turn" evidence="88">
    <location>
        <begin position="9"/>
        <end position="11"/>
    </location>
</feature>
<feature type="turn" evidence="88">
    <location>
        <begin position="13"/>
        <end position="15"/>
    </location>
</feature>
<feature type="helix" evidence="88">
    <location>
        <begin position="16"/>
        <end position="18"/>
    </location>
</feature>
<feature type="helix" evidence="88">
    <location>
        <begin position="21"/>
        <end position="24"/>
    </location>
</feature>
<feature type="strand" evidence="88">
    <location>
        <begin position="25"/>
        <end position="27"/>
    </location>
</feature>
<feature type="strand" evidence="87">
    <location>
        <begin position="31"/>
        <end position="33"/>
    </location>
</feature>
<feature type="turn" evidence="88">
    <location>
        <begin position="35"/>
        <end position="37"/>
    </location>
</feature>
<feature type="strand" evidence="90">
    <location>
        <begin position="38"/>
        <end position="40"/>
    </location>
</feature>
<feature type="strand" evidence="89">
    <location>
        <begin position="42"/>
        <end position="44"/>
    </location>
</feature>
<feature type="strand" evidence="88">
    <location>
        <begin position="45"/>
        <end position="50"/>
    </location>
</feature>
<feature type="strand" evidence="88">
    <location>
        <begin position="56"/>
        <end position="61"/>
    </location>
</feature>
<feature type="strand" evidence="88">
    <location>
        <begin position="63"/>
        <end position="70"/>
    </location>
</feature>
<feature type="strand" evidence="88">
    <location>
        <begin position="73"/>
        <end position="75"/>
    </location>
</feature>
<feature type="strand" evidence="88">
    <location>
        <begin position="77"/>
        <end position="82"/>
    </location>
</feature>
<feature type="turn" evidence="92">
    <location>
        <begin position="83"/>
        <end position="85"/>
    </location>
</feature>
<feature type="strand" evidence="88">
    <location>
        <begin position="88"/>
        <end position="97"/>
    </location>
</feature>
<feature type="strand" evidence="94">
    <location>
        <begin position="99"/>
        <end position="103"/>
    </location>
</feature>
<feature type="strand" evidence="88">
    <location>
        <begin position="106"/>
        <end position="109"/>
    </location>
</feature>
<feature type="strand" evidence="88">
    <location>
        <begin position="115"/>
        <end position="124"/>
    </location>
</feature>
<feature type="helix" evidence="88">
    <location>
        <begin position="125"/>
        <end position="127"/>
    </location>
</feature>
<feature type="helix" evidence="88">
    <location>
        <begin position="130"/>
        <end position="133"/>
    </location>
</feature>
<feature type="strand" evidence="88">
    <location>
        <begin position="139"/>
        <end position="151"/>
    </location>
</feature>
<feature type="helix" evidence="88">
    <location>
        <begin position="154"/>
        <end position="156"/>
    </location>
</feature>
<feature type="helix" evidence="88">
    <location>
        <begin position="157"/>
        <end position="162"/>
    </location>
</feature>
<feature type="helix" evidence="88">
    <location>
        <begin position="163"/>
        <end position="165"/>
    </location>
</feature>
<feature type="strand" evidence="88">
    <location>
        <begin position="172"/>
        <end position="174"/>
    </location>
</feature>
<feature type="helix" evidence="88">
    <location>
        <begin position="180"/>
        <end position="183"/>
    </location>
</feature>
<feature type="strand" evidence="88">
    <location>
        <begin position="190"/>
        <end position="195"/>
    </location>
</feature>
<feature type="strand" evidence="95">
    <location>
        <begin position="198"/>
        <end position="202"/>
    </location>
</feature>
<feature type="strand" evidence="88">
    <location>
        <begin position="206"/>
        <end position="213"/>
    </location>
</feature>
<feature type="strand" evidence="88">
    <location>
        <begin position="215"/>
        <end position="217"/>
    </location>
</feature>
<feature type="helix" evidence="88">
    <location>
        <begin position="219"/>
        <end position="225"/>
    </location>
</feature>
<feature type="turn" evidence="91">
    <location>
        <begin position="226"/>
        <end position="228"/>
    </location>
</feature>
<feature type="strand" evidence="88">
    <location>
        <begin position="229"/>
        <end position="231"/>
    </location>
</feature>
<feature type="strand" evidence="96">
    <location>
        <begin position="233"/>
        <end position="236"/>
    </location>
</feature>
<feature type="strand" evidence="88">
    <location>
        <begin position="256"/>
        <end position="258"/>
    </location>
</feature>
<proteinExistence type="evidence at protein level"/>
<evidence type="ECO:0000250" key="1">
    <source>
        <dbReference type="UniProtKB" id="P27139"/>
    </source>
</evidence>
<evidence type="ECO:0000255" key="2">
    <source>
        <dbReference type="PROSITE-ProRule" id="PRU01134"/>
    </source>
</evidence>
<evidence type="ECO:0000269" key="3">
    <source>
    </source>
</evidence>
<evidence type="ECO:0000269" key="4">
    <source>
    </source>
</evidence>
<evidence type="ECO:0000269" key="5">
    <source>
    </source>
</evidence>
<evidence type="ECO:0000269" key="6">
    <source>
    </source>
</evidence>
<evidence type="ECO:0000269" key="7">
    <source>
    </source>
</evidence>
<evidence type="ECO:0000269" key="8">
    <source>
    </source>
</evidence>
<evidence type="ECO:0000269" key="9">
    <source>
    </source>
</evidence>
<evidence type="ECO:0000269" key="10">
    <source>
    </source>
</evidence>
<evidence type="ECO:0000269" key="11">
    <source>
    </source>
</evidence>
<evidence type="ECO:0000269" key="12">
    <source>
    </source>
</evidence>
<evidence type="ECO:0000269" key="13">
    <source>
    </source>
</evidence>
<evidence type="ECO:0000269" key="14">
    <source>
    </source>
</evidence>
<evidence type="ECO:0000269" key="15">
    <source>
    </source>
</evidence>
<evidence type="ECO:0000269" key="16">
    <source>
    </source>
</evidence>
<evidence type="ECO:0000269" key="17">
    <source>
    </source>
</evidence>
<evidence type="ECO:0000269" key="18">
    <source>
    </source>
</evidence>
<evidence type="ECO:0000269" key="19">
    <source>
    </source>
</evidence>
<evidence type="ECO:0000269" key="20">
    <source>
    </source>
</evidence>
<evidence type="ECO:0000269" key="21">
    <source>
    </source>
</evidence>
<evidence type="ECO:0000269" key="22">
    <source>
    </source>
</evidence>
<evidence type="ECO:0000269" key="23">
    <source>
    </source>
</evidence>
<evidence type="ECO:0000269" key="24">
    <source>
    </source>
</evidence>
<evidence type="ECO:0000269" key="25">
    <source>
    </source>
</evidence>
<evidence type="ECO:0000269" key="26">
    <source>
    </source>
</evidence>
<evidence type="ECO:0000269" key="27">
    <source>
    </source>
</evidence>
<evidence type="ECO:0000269" key="28">
    <source>
    </source>
</evidence>
<evidence type="ECO:0000269" key="29">
    <source>
    </source>
</evidence>
<evidence type="ECO:0000269" key="30">
    <source>
    </source>
</evidence>
<evidence type="ECO:0000269" key="31">
    <source>
    </source>
</evidence>
<evidence type="ECO:0000269" key="32">
    <source>
    </source>
</evidence>
<evidence type="ECO:0000269" key="33">
    <source>
    </source>
</evidence>
<evidence type="ECO:0000269" key="34">
    <source>
    </source>
</evidence>
<evidence type="ECO:0000269" key="35">
    <source>
    </source>
</evidence>
<evidence type="ECO:0000269" key="36">
    <source>
    </source>
</evidence>
<evidence type="ECO:0000269" key="37">
    <source>
    </source>
</evidence>
<evidence type="ECO:0000269" key="38">
    <source>
    </source>
</evidence>
<evidence type="ECO:0000269" key="39">
    <source>
    </source>
</evidence>
<evidence type="ECO:0000269" key="40">
    <source>
    </source>
</evidence>
<evidence type="ECO:0000269" key="41">
    <source>
    </source>
</evidence>
<evidence type="ECO:0000269" key="42">
    <source>
    </source>
</evidence>
<evidence type="ECO:0000269" key="43">
    <source>
    </source>
</evidence>
<evidence type="ECO:0000269" key="44">
    <source>
    </source>
</evidence>
<evidence type="ECO:0000269" key="45">
    <source>
    </source>
</evidence>
<evidence type="ECO:0000269" key="46">
    <source>
    </source>
</evidence>
<evidence type="ECO:0000269" key="47">
    <source>
    </source>
</evidence>
<evidence type="ECO:0000269" key="48">
    <source>
    </source>
</evidence>
<evidence type="ECO:0000269" key="49">
    <source>
    </source>
</evidence>
<evidence type="ECO:0000269" key="50">
    <source>
    </source>
</evidence>
<evidence type="ECO:0000269" key="51">
    <source>
    </source>
</evidence>
<evidence type="ECO:0000269" key="52">
    <source>
    </source>
</evidence>
<evidence type="ECO:0000269" key="53">
    <source>
    </source>
</evidence>
<evidence type="ECO:0000269" key="54">
    <source>
    </source>
</evidence>
<evidence type="ECO:0000269" key="55">
    <source>
    </source>
</evidence>
<evidence type="ECO:0000269" key="56">
    <source>
    </source>
</evidence>
<evidence type="ECO:0000269" key="57">
    <source>
    </source>
</evidence>
<evidence type="ECO:0000269" key="58">
    <source>
    </source>
</evidence>
<evidence type="ECO:0000269" key="59">
    <source>
    </source>
</evidence>
<evidence type="ECO:0000269" key="60">
    <source>
    </source>
</evidence>
<evidence type="ECO:0000269" key="61">
    <source>
    </source>
</evidence>
<evidence type="ECO:0000269" key="62">
    <source>
    </source>
</evidence>
<evidence type="ECO:0000269" key="63">
    <source>
    </source>
</evidence>
<evidence type="ECO:0000269" key="64">
    <source>
    </source>
</evidence>
<evidence type="ECO:0000269" key="65">
    <source>
    </source>
</evidence>
<evidence type="ECO:0000269" key="66">
    <source>
    </source>
</evidence>
<evidence type="ECO:0000269" key="67">
    <source>
    </source>
</evidence>
<evidence type="ECO:0000269" key="68">
    <source>
    </source>
</evidence>
<evidence type="ECO:0000269" key="69">
    <source>
    </source>
</evidence>
<evidence type="ECO:0000269" key="70">
    <source>
    </source>
</evidence>
<evidence type="ECO:0000269" key="71">
    <source>
    </source>
</evidence>
<evidence type="ECO:0000269" key="72">
    <source>
    </source>
</evidence>
<evidence type="ECO:0000269" key="73">
    <source>
    </source>
</evidence>
<evidence type="ECO:0000269" key="74">
    <source>
    </source>
</evidence>
<evidence type="ECO:0000269" key="75">
    <source>
    </source>
</evidence>
<evidence type="ECO:0000269" key="76">
    <source>
    </source>
</evidence>
<evidence type="ECO:0000269" key="77">
    <source>
    </source>
</evidence>
<evidence type="ECO:0000269" key="78">
    <source>
    </source>
</evidence>
<evidence type="ECO:0000269" key="79">
    <source>
    </source>
</evidence>
<evidence type="ECO:0000269" key="80">
    <source>
    </source>
</evidence>
<evidence type="ECO:0000269" key="81">
    <source>
    </source>
</evidence>
<evidence type="ECO:0000269" key="82">
    <source>
    </source>
</evidence>
<evidence type="ECO:0000305" key="83"/>
<evidence type="ECO:0000305" key="84">
    <source>
    </source>
</evidence>
<evidence type="ECO:0000305" key="85">
    <source>
    </source>
</evidence>
<evidence type="ECO:0007744" key="86">
    <source>
    </source>
</evidence>
<evidence type="ECO:0007829" key="87">
    <source>
        <dbReference type="PDB" id="2X7S"/>
    </source>
</evidence>
<evidence type="ECO:0007829" key="88">
    <source>
        <dbReference type="PDB" id="3K34"/>
    </source>
</evidence>
<evidence type="ECO:0007829" key="89">
    <source>
        <dbReference type="PDB" id="3KOI"/>
    </source>
</evidence>
<evidence type="ECO:0007829" key="90">
    <source>
        <dbReference type="PDB" id="3KS3"/>
    </source>
</evidence>
<evidence type="ECO:0007829" key="91">
    <source>
        <dbReference type="PDB" id="4QK3"/>
    </source>
</evidence>
<evidence type="ECO:0007829" key="92">
    <source>
        <dbReference type="PDB" id="5GMN"/>
    </source>
</evidence>
<evidence type="ECO:0007829" key="93">
    <source>
        <dbReference type="PDB" id="5Y2R"/>
    </source>
</evidence>
<evidence type="ECO:0007829" key="94">
    <source>
        <dbReference type="PDB" id="6Q9T"/>
    </source>
</evidence>
<evidence type="ECO:0007829" key="95">
    <source>
        <dbReference type="PDB" id="6QEB"/>
    </source>
</evidence>
<evidence type="ECO:0007829" key="96">
    <source>
        <dbReference type="PDB" id="7Q0C"/>
    </source>
</evidence>
<gene>
    <name type="primary">CA2</name>
</gene>
<organism>
    <name type="scientific">Homo sapiens</name>
    <name type="common">Human</name>
    <dbReference type="NCBI Taxonomy" id="9606"/>
    <lineage>
        <taxon>Eukaryota</taxon>
        <taxon>Metazoa</taxon>
        <taxon>Chordata</taxon>
        <taxon>Craniata</taxon>
        <taxon>Vertebrata</taxon>
        <taxon>Euteleostomi</taxon>
        <taxon>Mammalia</taxon>
        <taxon>Eutheria</taxon>
        <taxon>Euarchontoglires</taxon>
        <taxon>Primates</taxon>
        <taxon>Haplorrhini</taxon>
        <taxon>Catarrhini</taxon>
        <taxon>Hominidae</taxon>
        <taxon>Homo</taxon>
    </lineage>
</organism>
<reference key="1">
    <citation type="journal article" date="1987" name="Nucleic Acids Res.">
        <title>Nucleotide sequence of human liver carbonic anhydrase II cDNA.</title>
        <authorList>
            <person name="Montgomery J.C."/>
            <person name="Venta P.J."/>
            <person name="Tashian R.E."/>
            <person name="Hewett-Emmett D."/>
        </authorList>
    </citation>
    <scope>NUCLEOTIDE SEQUENCE [MRNA]</scope>
</reference>
<reference key="2">
    <citation type="journal article" date="1987" name="Genomics">
        <title>Cloning, expression, and sequence homologies of cDNA for human carbonic anhydrase II.</title>
        <authorList>
            <person name="Murakami H."/>
            <person name="Marelich G.P."/>
            <person name="Grubb J.H."/>
            <person name="Kyle J.W."/>
            <person name="Sly W.S."/>
        </authorList>
    </citation>
    <scope>NUCLEOTIDE SEQUENCE [MRNA]</scope>
</reference>
<reference key="3">
    <citation type="submission" date="2004-06" db="EMBL/GenBank/DDBJ databases">
        <title>Cloning of human full open reading frames in Gateway(TM) system entry vector (pDONR201).</title>
        <authorList>
            <person name="Halleck A."/>
            <person name="Ebert L."/>
            <person name="Mkoundinya M."/>
            <person name="Schick M."/>
            <person name="Eisenstein S."/>
            <person name="Neubert P."/>
            <person name="Kstrang K."/>
            <person name="Schatten R."/>
            <person name="Shen B."/>
            <person name="Henze S."/>
            <person name="Mar W."/>
            <person name="Korn B."/>
            <person name="Zuo D."/>
            <person name="Hu Y."/>
            <person name="LaBaer J."/>
        </authorList>
    </citation>
    <scope>NUCLEOTIDE SEQUENCE [LARGE SCALE MRNA]</scope>
</reference>
<reference key="4">
    <citation type="journal article" date="2004" name="Nat. Genet.">
        <title>Complete sequencing and characterization of 21,243 full-length human cDNAs.</title>
        <authorList>
            <person name="Ota T."/>
            <person name="Suzuki Y."/>
            <person name="Nishikawa T."/>
            <person name="Otsuki T."/>
            <person name="Sugiyama T."/>
            <person name="Irie R."/>
            <person name="Wakamatsu A."/>
            <person name="Hayashi K."/>
            <person name="Sato H."/>
            <person name="Nagai K."/>
            <person name="Kimura K."/>
            <person name="Makita H."/>
            <person name="Sekine M."/>
            <person name="Obayashi M."/>
            <person name="Nishi T."/>
            <person name="Shibahara T."/>
            <person name="Tanaka T."/>
            <person name="Ishii S."/>
            <person name="Yamamoto J."/>
            <person name="Saito K."/>
            <person name="Kawai Y."/>
            <person name="Isono Y."/>
            <person name="Nakamura Y."/>
            <person name="Nagahari K."/>
            <person name="Murakami K."/>
            <person name="Yasuda T."/>
            <person name="Iwayanagi T."/>
            <person name="Wagatsuma M."/>
            <person name="Shiratori A."/>
            <person name="Sudo H."/>
            <person name="Hosoiri T."/>
            <person name="Kaku Y."/>
            <person name="Kodaira H."/>
            <person name="Kondo H."/>
            <person name="Sugawara M."/>
            <person name="Takahashi M."/>
            <person name="Kanda K."/>
            <person name="Yokoi T."/>
            <person name="Furuya T."/>
            <person name="Kikkawa E."/>
            <person name="Omura Y."/>
            <person name="Abe K."/>
            <person name="Kamihara K."/>
            <person name="Katsuta N."/>
            <person name="Sato K."/>
            <person name="Tanikawa M."/>
            <person name="Yamazaki M."/>
            <person name="Ninomiya K."/>
            <person name="Ishibashi T."/>
            <person name="Yamashita H."/>
            <person name="Murakawa K."/>
            <person name="Fujimori K."/>
            <person name="Tanai H."/>
            <person name="Kimata M."/>
            <person name="Watanabe M."/>
            <person name="Hiraoka S."/>
            <person name="Chiba Y."/>
            <person name="Ishida S."/>
            <person name="Ono Y."/>
            <person name="Takiguchi S."/>
            <person name="Watanabe S."/>
            <person name="Yosida M."/>
            <person name="Hotuta T."/>
            <person name="Kusano J."/>
            <person name="Kanehori K."/>
            <person name="Takahashi-Fujii A."/>
            <person name="Hara H."/>
            <person name="Tanase T.-O."/>
            <person name="Nomura Y."/>
            <person name="Togiya S."/>
            <person name="Komai F."/>
            <person name="Hara R."/>
            <person name="Takeuchi K."/>
            <person name="Arita M."/>
            <person name="Imose N."/>
            <person name="Musashino K."/>
            <person name="Yuuki H."/>
            <person name="Oshima A."/>
            <person name="Sasaki N."/>
            <person name="Aotsuka S."/>
            <person name="Yoshikawa Y."/>
            <person name="Matsunawa H."/>
            <person name="Ichihara T."/>
            <person name="Shiohata N."/>
            <person name="Sano S."/>
            <person name="Moriya S."/>
            <person name="Momiyama H."/>
            <person name="Satoh N."/>
            <person name="Takami S."/>
            <person name="Terashima Y."/>
            <person name="Suzuki O."/>
            <person name="Nakagawa S."/>
            <person name="Senoh A."/>
            <person name="Mizoguchi H."/>
            <person name="Goto Y."/>
            <person name="Shimizu F."/>
            <person name="Wakebe H."/>
            <person name="Hishigaki H."/>
            <person name="Watanabe T."/>
            <person name="Sugiyama A."/>
            <person name="Takemoto M."/>
            <person name="Kawakami B."/>
            <person name="Yamazaki M."/>
            <person name="Watanabe K."/>
            <person name="Kumagai A."/>
            <person name="Itakura S."/>
            <person name="Fukuzumi Y."/>
            <person name="Fujimori Y."/>
            <person name="Komiyama M."/>
            <person name="Tashiro H."/>
            <person name="Tanigami A."/>
            <person name="Fujiwara T."/>
            <person name="Ono T."/>
            <person name="Yamada K."/>
            <person name="Fujii Y."/>
            <person name="Ozaki K."/>
            <person name="Hirao M."/>
            <person name="Ohmori Y."/>
            <person name="Kawabata A."/>
            <person name="Hikiji T."/>
            <person name="Kobatake N."/>
            <person name="Inagaki H."/>
            <person name="Ikema Y."/>
            <person name="Okamoto S."/>
            <person name="Okitani R."/>
            <person name="Kawakami T."/>
            <person name="Noguchi S."/>
            <person name="Itoh T."/>
            <person name="Shigeta K."/>
            <person name="Senba T."/>
            <person name="Matsumura K."/>
            <person name="Nakajima Y."/>
            <person name="Mizuno T."/>
            <person name="Morinaga M."/>
            <person name="Sasaki M."/>
            <person name="Togashi T."/>
            <person name="Oyama M."/>
            <person name="Hata H."/>
            <person name="Watanabe M."/>
            <person name="Komatsu T."/>
            <person name="Mizushima-Sugano J."/>
            <person name="Satoh T."/>
            <person name="Shirai Y."/>
            <person name="Takahashi Y."/>
            <person name="Nakagawa K."/>
            <person name="Okumura K."/>
            <person name="Nagase T."/>
            <person name="Nomura N."/>
            <person name="Kikuchi H."/>
            <person name="Masuho Y."/>
            <person name="Yamashita R."/>
            <person name="Nakai K."/>
            <person name="Yada T."/>
            <person name="Nakamura Y."/>
            <person name="Ohara O."/>
            <person name="Isogai T."/>
            <person name="Sugano S."/>
        </authorList>
    </citation>
    <scope>NUCLEOTIDE SEQUENCE [LARGE SCALE MRNA]</scope>
    <source>
        <tissue>Urinary bladder</tissue>
    </source>
</reference>
<reference key="5">
    <citation type="submission" date="2005-07" db="EMBL/GenBank/DDBJ databases">
        <authorList>
            <person name="Mural R.J."/>
            <person name="Istrail S."/>
            <person name="Sutton G.G."/>
            <person name="Florea L."/>
            <person name="Halpern A.L."/>
            <person name="Mobarry C.M."/>
            <person name="Lippert R."/>
            <person name="Walenz B."/>
            <person name="Shatkay H."/>
            <person name="Dew I."/>
            <person name="Miller J.R."/>
            <person name="Flanigan M.J."/>
            <person name="Edwards N.J."/>
            <person name="Bolanos R."/>
            <person name="Fasulo D."/>
            <person name="Halldorsson B.V."/>
            <person name="Hannenhalli S."/>
            <person name="Turner R."/>
            <person name="Yooseph S."/>
            <person name="Lu F."/>
            <person name="Nusskern D.R."/>
            <person name="Shue B.C."/>
            <person name="Zheng X.H."/>
            <person name="Zhong F."/>
            <person name="Delcher A.L."/>
            <person name="Huson D.H."/>
            <person name="Kravitz S.A."/>
            <person name="Mouchard L."/>
            <person name="Reinert K."/>
            <person name="Remington K.A."/>
            <person name="Clark A.G."/>
            <person name="Waterman M.S."/>
            <person name="Eichler E.E."/>
            <person name="Adams M.D."/>
            <person name="Hunkapiller M.W."/>
            <person name="Myers E.W."/>
            <person name="Venter J.C."/>
        </authorList>
    </citation>
    <scope>NUCLEOTIDE SEQUENCE [LARGE SCALE GENOMIC DNA]</scope>
</reference>
<reference key="6">
    <citation type="journal article" date="2004" name="Genome Res.">
        <title>The status, quality, and expansion of the NIH full-length cDNA project: the Mammalian Gene Collection (MGC).</title>
        <authorList>
            <consortium name="The MGC Project Team"/>
        </authorList>
    </citation>
    <scope>NUCLEOTIDE SEQUENCE [LARGE SCALE MRNA]</scope>
    <source>
        <tissue>Ovary</tissue>
    </source>
</reference>
<reference key="7">
    <citation type="journal article" date="1974" name="J. Biol. Chem.">
        <title>Human carbonic anhydrases. XII. The complete primary structure of the C isozyme.</title>
        <authorList>
            <person name="Lin K.-T.D."/>
            <person name="Deutsch H.F."/>
        </authorList>
    </citation>
    <scope>PROTEIN SEQUENCE OF 2-260</scope>
    <scope>CLEAVAGE OF INITIATOR METHIONINE</scope>
    <scope>ACETYLATION AT SER-2</scope>
</reference>
<reference key="8">
    <citation type="journal article" date="1976" name="J. Biol. Chem.">
        <title>Primary structure of human carbonic anhydrase C.</title>
        <authorList>
            <person name="Henderson L.E."/>
            <person name="Henriksson D."/>
            <person name="Nyman P.O."/>
        </authorList>
    </citation>
    <scope>PROTEIN SEQUENCE OF 2-260</scope>
</reference>
<reference key="9">
    <citation type="journal article" date="1985" name="Biochim. Biophys. Acta">
        <title>Comparison of the 5' regions of human and mouse carbonic anhydrase II genes and identification of possible regulatory elements.</title>
        <authorList>
            <person name="Venta P.J."/>
            <person name="Montgomery J.C."/>
            <person name="Hewett-Emmett D."/>
            <person name="Tashian R.E."/>
        </authorList>
    </citation>
    <scope>NUCLEOTIDE SEQUENCE [GENOMIC DNA] OF 1-77</scope>
</reference>
<reference key="10">
    <citation type="journal article" date="2003" name="Biochemistry">
        <title>Direct extracellular interaction between carbonic anhydrase IV and the human NBC1 sodium/bicarbonate co-transporter.</title>
        <authorList>
            <person name="Alvarez B.V."/>
            <person name="Loiselle F.B."/>
            <person name="Supuran C.T."/>
            <person name="Schwartz G.J."/>
            <person name="Casey J.R."/>
        </authorList>
    </citation>
    <scope>INTERACTION WITH SLC4A4</scope>
</reference>
<reference key="11">
    <citation type="journal article" date="2004" name="Am. J. Physiol.">
        <title>Regulation of the human NBC3 Na+/HCO3- cotransporter by carbonic anhydrase II and PKA.</title>
        <authorList>
            <person name="Loiselle F.B."/>
            <person name="Morgan P.E."/>
            <person name="Alvarez B.V."/>
            <person name="Casey J.R."/>
        </authorList>
    </citation>
    <scope>INTERACTION WITH SLC4A7</scope>
</reference>
<reference key="12">
    <citation type="journal article" date="2004" name="J. Physiol. (Lond.)">
        <title>Molecular mechanism of kNBC1-carbonic anhydrase II interaction in proximal tubule cells.</title>
        <authorList>
            <person name="Pushkin A."/>
            <person name="Abuladze N."/>
            <person name="Gross E."/>
            <person name="Newman D."/>
            <person name="Tatishchev S."/>
            <person name="Lee I."/>
            <person name="Fedotoff O."/>
            <person name="Bondar G."/>
            <person name="Azimov R."/>
            <person name="Ngyuen M."/>
            <person name="Kurtz I."/>
        </authorList>
    </citation>
    <scope>INTERACTION WITH SLC4A4</scope>
</reference>
<reference key="13">
    <citation type="journal article" date="2005" name="EMBO J.">
        <title>Metabolon disruption: a mechanism that regulates bicarbonate transport.</title>
        <authorList>
            <person name="Alvarez B.V."/>
            <person name="Vilas G.L."/>
            <person name="Casey J.R."/>
        </authorList>
    </citation>
    <scope>FUNCTION</scope>
    <scope>INTERACTION WITH SLC26A6</scope>
    <scope>SUBCELLULAR LOCATION</scope>
</reference>
<reference key="14">
    <citation type="journal article" date="2007" name="Bioorg. Med. Chem. Lett.">
        <title>Phosph(on)ate as a zinc-binding group in metalloenzyme inhibitors: X-ray crystal structure of the antiviral drug foscarnet complexed to human carbonic anhydrase I.</title>
        <authorList>
            <person name="Temperini C."/>
            <person name="Innocenti A."/>
            <person name="Guerri A."/>
            <person name="Scozzafava A."/>
            <person name="Rusconi S."/>
            <person name="Supuran C.T."/>
        </authorList>
    </citation>
    <scope>ACTIVITY REGULATION</scope>
    <scope>FUNCTION</scope>
    <scope>CATALYTIC ACTIVITY</scope>
</reference>
<reference key="15">
    <citation type="journal article" date="2009" name="Proteins">
        <title>Crystal structure of human carbonic anhydrase XIII and its complex with the inhibitor acetazolamide.</title>
        <authorList>
            <person name="Di Fiore A."/>
            <person name="Monti S.M."/>
            <person name="Hilvo M."/>
            <person name="Parkkila S."/>
            <person name="Romano V."/>
            <person name="Scaloni A."/>
            <person name="Pedone C."/>
            <person name="Scozzafava A."/>
            <person name="Supuran C.T."/>
            <person name="De Simone G."/>
        </authorList>
    </citation>
    <scope>BIOPHYSICOCHEMICAL PROPERTIES</scope>
    <scope>ACTIVITY REGULATION</scope>
    <scope>FUNCTION</scope>
    <scope>CATALYTIC ACTIVITY</scope>
</reference>
<reference key="16">
    <citation type="journal article" date="2011" name="BMC Syst. Biol.">
        <title>Initial characterization of the human central proteome.</title>
        <authorList>
            <person name="Burkard T.R."/>
            <person name="Planyavsky M."/>
            <person name="Kaupe I."/>
            <person name="Breitwieser F.P."/>
            <person name="Buerckstuemmer T."/>
            <person name="Bennett K.L."/>
            <person name="Superti-Furga G."/>
            <person name="Colinge J."/>
        </authorList>
    </citation>
    <scope>IDENTIFICATION BY MASS SPECTROMETRY [LARGE SCALE ANALYSIS]</scope>
</reference>
<reference key="17">
    <citation type="journal article" date="2014" name="J. Proteomics">
        <title>An enzyme assisted RP-RPLC approach for in-depth analysis of human liver phosphoproteome.</title>
        <authorList>
            <person name="Bian Y."/>
            <person name="Song C."/>
            <person name="Cheng K."/>
            <person name="Dong M."/>
            <person name="Wang F."/>
            <person name="Huang J."/>
            <person name="Sun D."/>
            <person name="Wang L."/>
            <person name="Ye M."/>
            <person name="Zou H."/>
        </authorList>
    </citation>
    <scope>PHOSPHORYLATION [LARGE SCALE ANALYSIS] AT SER-165 AND SER-172</scope>
    <scope>IDENTIFICATION BY MASS SPECTROMETRY [LARGE SCALE ANALYSIS]</scope>
    <source>
        <tissue>Liver</tissue>
    </source>
</reference>
<reference key="18">
    <citation type="journal article" date="1972" name="Nature New Biol.">
        <title>Crystal structure of human carbonic anhydrase C.</title>
        <authorList>
            <person name="Liljas A."/>
            <person name="Kannan K.K."/>
            <person name="Bergsten P.-C."/>
            <person name="Waara I."/>
            <person name="Fridborg K."/>
            <person name="Strandberg B."/>
            <person name="Carlbom U."/>
            <person name="Jaerup L."/>
            <person name="Loevgren S."/>
            <person name="Petef M."/>
        </authorList>
    </citation>
    <scope>X-RAY CRYSTALLOGRAPHY (2.0 ANGSTROMS)</scope>
</reference>
<reference key="19">
    <citation type="journal article" date="1988" name="Proteins">
        <title>Refined structure of human carbonic anhydrase II at 2.0-A resolution.</title>
        <authorList>
            <person name="Eriksson A.E."/>
            <person name="Jones T.A."/>
            <person name="Liljas A."/>
        </authorList>
    </citation>
    <scope>X-RAY CRYSTALLOGRAPHY (2.00 ANGSTROMS) IN COMPLEX WITH ZINC ION</scope>
</reference>
<reference key="20">
    <citation type="journal article" date="1988" name="Proteins">
        <title>Crystallographic studies of inhibitor binding sites in human carbonic anhydrase II: a pentacoordinated binding of the SCN-ion to the zinc at high pH.</title>
        <authorList>
            <person name="Eriksson A.E."/>
            <person name="Kylsten P.M."/>
            <person name="Jones T.A."/>
            <person name="Liljas A."/>
        </authorList>
    </citation>
    <scope>X-RAY CRYSTALLOGRAPHY (1.90 ANGSTROMS) IN COMPLEX WITH ZINC ION AND INHIBITORS</scope>
</reference>
<reference key="21">
    <citation type="journal article" date="1991" name="Biochemistry">
        <title>Conformational mobility of His-64 in the Thr-200TO: human carbonic anhydrase II.</title>
        <authorList>
            <person name="Krebs J.F."/>
            <person name="Fierke C.A."/>
            <person name="Alexander R.S."/>
            <person name="Christianson D.W."/>
        </authorList>
    </citation>
    <scope>X-RAY CRYSTALLOGRAPHY (2.10 ANGSTROMS) OF MUTANT SER-199 IN COMPLEX WITH ZINC ION</scope>
    <scope>FUNCTION</scope>
    <scope>CATALYTIC ACTIVITY</scope>
    <scope>MUTAGENESIS OF THR-199</scope>
    <scope>BIOPHYSICOCHEMICAL PROPERTIES</scope>
</reference>
<reference key="22">
    <citation type="journal article" date="1991" name="Biochemistry">
        <title>Engineering the hydrophobic pocket of carbonic anhydrase II.</title>
        <authorList>
            <person name="Alexander R.S."/>
            <person name="Nair S.K."/>
            <person name="Christianson D.W."/>
        </authorList>
    </citation>
    <scope>X-RAY CRYSTALLOGRAPHY (2.10 ANGSTROMS) OF MUTANTS PHE-142; TYR-142 AND HIS-142 IN COMPLEX WITH INHIBITORS</scope>
    <scope>MUTAGENESIS OF VAL-142</scope>
</reference>
<reference key="23">
    <citation type="journal article" date="1991" name="J. Biol. Chem.">
        <title>Altering the mouth of a hydrophobic pocket. Structure and kinetics of human carbonic anhydrase II mutants at residue Val-121.</title>
        <authorList>
            <person name="Nair S.K."/>
            <person name="Calderone T.L."/>
            <person name="Christianson D.W."/>
            <person name="Fierke C.A."/>
        </authorList>
    </citation>
    <scope>X-RAY CRYSTALLOGRAPHY (2.40 ANGSTROMS) OF MUTANT ALA-121</scope>
    <scope>FUNCTION</scope>
    <scope>CATALYTIC ACTIVITY</scope>
    <scope>MUTAGENESIS OF VAL-121</scope>
    <scope>ACTIVITY REGULATION</scope>
</reference>
<reference key="24">
    <citation type="journal article" date="1992" name="Eur. J. Biochem.">
        <title>Crystallographic studies of the binding of protonated and unprotonated inhibitors to carbonic anhydrase using hydrogen sulphide and nitrate anions.</title>
        <authorList>
            <person name="Mangani S."/>
            <person name="Haakansson K."/>
        </authorList>
    </citation>
    <scope>X-RAY CRYSTALLOGRAPHY (1.90 ANGSTROMS) IN COMPLEX WITH ZINC ION AND INHIBITORS</scope>
    <scope>ACTIVITY REGULATION</scope>
    <scope>FUNCTION</scope>
    <scope>CATALYTIC ACTIVITY</scope>
</reference>
<reference key="25">
    <citation type="journal article" date="1992" name="J. Mol. Biol.">
        <title>Structure of native and apo carbonic anhydrase II and structure of some of its anion-ligand complexes.</title>
        <authorList>
            <person name="Haakansson K."/>
            <person name="Carlsson M."/>
            <person name="Svensson L.A."/>
            <person name="Liljas A."/>
        </authorList>
    </citation>
    <scope>X-RAY CRYSTALLOGRAPHY (1.54 ANGSTROMS) IN COMPLEX WITH ZINC ION AND INHIBITORS</scope>
</reference>
<reference key="26">
    <citation type="journal article" date="1992" name="J. Mol. Biol.">
        <title>Structure of cobalt carbonic anhydrase complexed with bicarbonate.</title>
        <authorList>
            <person name="Haakansson K."/>
            <person name="Wehnert A."/>
        </authorList>
    </citation>
    <scope>X-RAY CRYSTALLOGRAPHY (1.88 ANGSTROMS) IN COMPLEX WITH COBALT ION AND BICARBONATE</scope>
</reference>
<reference key="27">
    <citation type="journal article" date="1993" name="Biochemistry">
        <title>Engineering the zinc binding site of human carbonic anhydrase II: structure of the His-94--&gt;Cys apoenzyme in a new crystalline form.</title>
        <authorList>
            <person name="Alexander R.S."/>
            <person name="Kiefer L.L."/>
            <person name="Fierke C.A."/>
            <person name="Christianson D.W."/>
        </authorList>
    </citation>
    <scope>X-RAY CRYSTALLOGRAPHY (2.30 ANGSTROMS) OF MUTANT CYS-94 IN COMPLEX WITH ZINC ION</scope>
    <scope>MUTAGENESIS OF HIS-94</scope>
</reference>
<reference key="28">
    <citation type="journal article" date="1993" name="Biochemistry">
        <title>Structural consequences of hydrophilic amino acid substitutions in the hydrophobic pocket of human carbonic anhydrase II.</title>
        <authorList>
            <person name="Nair S.K."/>
            <person name="Christianson D.W."/>
        </authorList>
    </citation>
    <scope>X-RAY CRYSTALLOGRAPHY (2.00 ANGSTROMS) OF MUTANT ALA-197; GLU-197; HIS-197 AND ARG-197</scope>
    <scope>FUNCTION</scope>
    <scope>CATALYTIC ACTIVITY</scope>
    <scope>MUTAGENESIS OF LEU-197</scope>
</reference>
<reference key="29">
    <citation type="journal article" date="1993" name="Biochemistry">
        <title>Structure of an engineered His3Cys zinc binding site in human carbonic anhydrase II.</title>
        <authorList>
            <person name="Ippolito J.A."/>
            <person name="Christianson D.W."/>
        </authorList>
    </citation>
    <scope>X-RAY CRYSTALLOGRAPHY (2.10 ANGSTROMS) OF MUTANT CYS-198 IN COMPLEX WITH ZINC ION</scope>
    <scope>FUNCTION</scope>
    <scope>CATALYTIC ACTIVITY</scope>
    <scope>MUTAGENESIS OF THR-198</scope>
</reference>
<reference key="30">
    <citation type="journal article" date="1993" name="Biochemistry">
        <title>Structure and energetics of a non-proline cis-peptidyl linkage in a proline-202--&gt;alanine carbonic anhydrase II variant.</title>
        <authorList>
            <person name="Tweedy N.B."/>
            <person name="Nair S.K."/>
            <person name="Paterno S.A."/>
            <person name="Fierke C.A."/>
            <person name="Christianson D.W."/>
        </authorList>
    </citation>
    <scope>X-RAY CRYSTALLOGRAPHY (1.70 ANGSTROMS) OF MUTANT ALA-201 IN COMPLEX WITH ZINC ION</scope>
    <scope>FUNCTION</scope>
    <scope>CATALYTIC ACTIVITY</scope>
    <scope>MUTAGENESIS OF PRO-201</scope>
</reference>
<reference key="31">
    <citation type="journal article" date="1993" name="FEBS Lett.">
        <title>The structure of human carbonic anhydrase II in complex with bromide and azide.</title>
        <authorList>
            <person name="Joensson B.M."/>
            <person name="Haakansson K."/>
            <person name="Liljas A."/>
        </authorList>
    </citation>
    <scope>X-RAY CRYSTALLOGRAPHY (1.80 ANGSTROMS) IN COMPLEX WITH ZINC ION AND INHIBITORS</scope>
</reference>
<reference key="32">
    <citation type="journal article" date="1993" name="J. Biol. Chem.">
        <title>Structural and functional importance of a conserved hydrogen bond network in human carbonic anhydrase II.</title>
        <authorList>
            <person name="Krebs J.F."/>
            <person name="Ippolito J.A."/>
            <person name="Christianson D.W."/>
            <person name="Fierke C.A."/>
        </authorList>
    </citation>
    <scope>X-RAY CRYSTALLOGRAPHY (2.25 ANGSTROMS) OF MUTANT VAL-198 IN COMPLEX WITH ZINC ION AND INHIBITORS</scope>
    <scope>FUNCTION</scope>
    <scope>CATALYTIC ACTIVITY</scope>
    <scope>MUTAGENESIS OF THR-198</scope>
    <scope>BIOPHYSICOCHEMICAL PROPERTIES</scope>
</reference>
<reference key="33">
    <citation type="journal article" date="1993" name="J. Mol. Biol.">
        <title>Crystal structure of the complex between human carbonic anhydrase II and the aromatic inhibitor 1,2,4-triazole.</title>
        <authorList>
            <person name="Mangani S."/>
            <person name="Liljas A."/>
        </authorList>
    </citation>
    <scope>X-RAY CRYSTALLOGRAPHY (1.90 ANGSTROMS) IN COMPLEX WITH INHIBITOR AND ZINC ION</scope>
</reference>
<reference key="34">
    <citation type="journal article" date="1993" name="Proteins">
        <title>Crystallographic analysis of Thr-200--&gt;His human carbonic anhydrase II and its complex with the substrate, HCO3-.</title>
        <authorList>
            <person name="Xue Y."/>
            <person name="Vidgren J."/>
            <person name="Svensson L.A."/>
            <person name="Liljas A."/>
            <person name="Jonsson B.H."/>
            <person name="Lindskog S."/>
        </authorList>
    </citation>
    <scope>X-RAY CRYSTALLOGRAPHY (1.90 ANGSTROMS) OF MUTANT HIS-199 IN COMPLEX WITH BICARBONATE AND ZINC ION</scope>
    <scope>FUNCTION</scope>
    <scope>CATALYTIC ACTIVITY</scope>
    <scope>MUTAGENESIS OF THR-199</scope>
</reference>
<reference key="35">
    <citation type="journal article" date="1993" name="Proteins">
        <title>Structural analysis of the zinc hydroxide-Thr-199-Glu-106 hydrogen-bond network in human carbonic anhydrase II.</title>
        <authorList>
            <person name="Xue Y."/>
            <person name="Liljas A."/>
            <person name="Jonsson B.H."/>
            <person name="Lindskog S."/>
        </authorList>
    </citation>
    <scope>X-RAY CRYSTALLOGRAPHY (1.70 ANGSTROMS) OF MUTANTS IN COMPLEX WITH BICARBONATE AND ZINC ION</scope>
    <scope>FUNCTION</scope>
    <scope>CATALYTIC ACTIVITY</scope>
    <scope>MUTAGENESIS OF GLU-106 AND THR-198</scope>
</reference>
<reference key="36">
    <citation type="journal article" date="1994" name="Acta Crystallogr. D">
        <title>X-ray analysis of metal-substituted human carbonic anhydrase II derivatives.</title>
        <authorList>
            <person name="Haakansson K."/>
            <person name="Wehnert A."/>
            <person name="Liljas A."/>
        </authorList>
    </citation>
    <scope>X-RAY CRYSTALLOGRAPHY (1.80 ANGSTROMS) IN COMPLEX WITH COBALT; COPPER; NICKEL AND MANGANESE IONS</scope>
</reference>
<reference key="37">
    <citation type="journal article" date="1994" name="Acta Crystallogr. D">
        <title>Wild-type and E106Q mutant carbonic anhydrase complexed with acetate.</title>
        <authorList>
            <person name="Haakansson K."/>
            <person name="Briand C."/>
            <person name="Zaitsev V."/>
            <person name="Xue Y."/>
            <person name="Liljas A."/>
        </authorList>
    </citation>
    <scope>X-RAY CRYSTALLOGRAPHY (1.90 ANGSTROMS) MUTANT GLN-106 IN COMPLEX WITH THE INHIBITOR ACETATE</scope>
    <scope>MUTAGENESIS OF GLU-106</scope>
</reference>
<reference key="38">
    <citation type="journal article" date="1994" name="Biochemistry">
        <title>Structural consequences of redesigning a protein-zinc binding site.</title>
        <authorList>
            <person name="Ippolito J.A."/>
            <person name="Christianson D.W."/>
        </authorList>
    </citation>
    <scope>X-RAY CRYSTALLOGRAPHY (2.20 ANGSTROMS) OF 2-259 OF MUTANTS ALA-94; CYS-94; CYS-96; CYS-119 AND ASP-119 IN COMPLEX WITH ZINC ION</scope>
</reference>
<reference key="39">
    <citation type="journal article" date="1994" name="FEBS Lett.">
        <title>The structure of a complex between carbonic anhydrase II and a new inhibitor, trifluoromethane sulphonamide.</title>
        <authorList>
            <person name="Haakansson K."/>
            <person name="Liljas A."/>
        </authorList>
    </citation>
    <scope>X-RAY CRYSTALLOGRAPHY (1.90 ANGSTROMS) IN COMPLEX WITH THE INHIBITOR TRIFLUOROMETHANE SULFONAMIDE</scope>
</reference>
<reference key="40">
    <citation type="journal article" date="1994" name="Protein Sci.">
        <title>Positions of His-64 and a bound water in human carbonic anhydrase II upon binding three structurally related inhibitors.</title>
        <authorList>
            <person name="Smith G.M."/>
            <person name="Alexander R.S."/>
            <person name="Christianson D.W."/>
            <person name="McKeever B.M."/>
            <person name="Ponticello G.S."/>
            <person name="Springer J.P."/>
            <person name="Randall W.C."/>
            <person name="Baldwin J.J."/>
            <person name="Habecker C.N."/>
        </authorList>
    </citation>
    <scope>X-RAY CRYSTALLOGRAPHY (1.60 ANGSTROMS) IN COMPLEX WITH INHIBITORS</scope>
</reference>
<reference key="41">
    <citation type="journal article" date="1995" name="Biochemistry">
        <title>Structural basis of inhibitor affinity to variants of human carbonic anhydrase II.</title>
        <authorList>
            <person name="Nair S.K."/>
            <person name="Krebs J.F."/>
            <person name="Christianson D.W."/>
            <person name="Fierke C.A."/>
        </authorList>
    </citation>
    <scope>X-RAY CRYSTALLOGRAPHY (1.90 ANGSTROMS) OF MUTANTS ARG-197; ASP-197 AND PHE-197 IN COMPLEX WITH THE INHIBITOR ACETAZOLAMIDE</scope>
</reference>
<reference key="42">
    <citation type="journal article" date="1995" name="J. Med. Chem.">
        <title>Secondary interactions significantly removed from the sulfonamide binding pocket of carbonic anhydrase II influence inhibitor binding constants.</title>
        <authorList>
            <person name="Boriack P.A."/>
            <person name="Christianson D.W."/>
            <person name="Kingery-Wood J."/>
            <person name="Whitesides G.M."/>
        </authorList>
    </citation>
    <scope>X-RAY CRYSTALLOGRAPHY (1.90 ANGSTROMS) IN COMPLEX WITH INHIBITORS</scope>
</reference>
<reference key="43">
    <citation type="journal article" date="1995" name="Proc. Natl. Acad. Sci. U.S.A.">
        <title>Structure-assisted redesign of a protein-zinc-binding site with femtomolar affinity.</title>
        <authorList>
            <person name="Ippolito J.A."/>
            <person name="Baird T.T. Jr."/>
            <person name="McGee S.A."/>
            <person name="Christianson D.W."/>
            <person name="Fierke C.A."/>
        </authorList>
    </citation>
    <scope>X-RAY CRYSTALLOGRAPHY (2.20 ANGSTROMS) OF MUTANTS ASP-198; GLU-198 AND HIS-198 IN COMPLEX WITH ZINC ION</scope>
    <scope>FUNCTION</scope>
    <scope>CATALYTIC ACTIVITY</scope>
    <scope>MUTAGENESIS OF THR-198</scope>
    <scope>BIOPHYSICOCHEMICAL PROPERTIES</scope>
</reference>
<reference key="44">
    <citation type="journal article" date="1996" name="Biochemistry">
        <title>Reversal of the hydrogen bond to zinc ligand histidine-119 dramatically diminishes catalysis and enhances metal equilibration kinetics in carbonic anhydrase II.</title>
        <authorList>
            <person name="Huang C.C."/>
            <person name="Lesburg C.A."/>
            <person name="Kiefer L.L."/>
            <person name="Fierke C.A."/>
            <person name="Christianson D.W."/>
        </authorList>
    </citation>
    <scope>X-RAY CRYSTALLOGRAPHY (1.80 ANGSTROMS) OF THE MUTANT GLN-117 IN COMPLEX WITH ZINC ION AND THE INHIBITOR ACETAZOLAMIDE</scope>
    <scope>FUNCTION</scope>
    <scope>CATALYTIC ACTIVITY</scope>
    <scope>MUTAGENESIS OF GLU-117</scope>
</reference>
<reference key="45">
    <citation type="journal article" date="1996" name="Biochemistry">
        <title>X-ray crystallographic studies of alanine-65 variants of carbonic anhydrase II reveal the structural basis of compromised proton transfer in catalysis.</title>
        <authorList>
            <person name="Scolnick L.R."/>
            <person name="Christianson D.W."/>
        </authorList>
    </citation>
    <scope>X-RAY CRYSTALLOGRAPHY (1.90 ANGSTROMS) OF MUTANTS GLY-65; HIS-65; LEU-65; PHE-65; SER-65 AND THR-65 IN COMPLEX WITH ZINC ION</scope>
</reference>
<reference key="46">
    <citation type="journal article" date="1996" name="J. Biol. Chem.">
        <title>Unexpected binding mode of the sulfonamide fluorophore 5-dimethylamino-1-naphthalene sulfonamide to human carbonic anhydrase II. Implications for the development of a zinc biosensor.</title>
        <authorList>
            <person name="Nair S.K."/>
            <person name="Elbaum D."/>
            <person name="Christianson D.W."/>
        </authorList>
    </citation>
    <scope>X-RAY CRYSTALLOGRAPHY (2.10 ANGSTROMS) IN COMPLEX WITH THE INHIBITOR DANSYLAMIDE</scope>
</reference>
<reference key="47">
    <citation type="journal article" date="1997" name="Biochemistry">
        <title>Carbonic anhydrase activators: X-ray crystallographic and spectroscopic investigations for the interaction of isozymes I and II with histamine.</title>
        <authorList>
            <person name="Briganti F."/>
            <person name="Mangani S."/>
            <person name="Orioli P."/>
            <person name="Scozzafava A."/>
            <person name="Vernaglione G."/>
            <person name="Supuran C.T."/>
        </authorList>
    </citation>
    <scope>X-RAY CRYSTALLOGRAPHY (2.00 ANGSTROMS) IN COMPLEX WITH THE ACTIVATOR HISTAMINE</scope>
    <scope>FUNCTION</scope>
    <scope>CATALYTIC ACTIVITY</scope>
    <scope>ACTIVITY REGULATION</scope>
</reference>
<reference key="48">
    <citation type="journal article" date="1997" name="Biochemistry">
        <title>Histidine --&gt; carboxamide ligand substitutions in the zinc binding site of carbonic anhydrase II alter metal coordination geometry but retain catalytic activity.</title>
        <authorList>
            <person name="Lesburg C.A."/>
            <person name="Huang C."/>
            <person name="Christianson D.W."/>
            <person name="Fierke C.A."/>
        </authorList>
    </citation>
    <scope>X-RAY CRYSTALLOGRAPHY (1.85 ANGSTROMS) OF MUTANTS ASN-94; ASN-119 AND GLN-119 IN COMPLEX WITH ZINC ION</scope>
    <scope>FUNCTION</scope>
    <scope>CATALYTIC ACTIVITY</scope>
    <scope>MUTAGENESIS OF HIS-94 AND HIS-119</scope>
    <scope>BIOPHYSICOCHEMICAL PROPERTIES</scope>
</reference>
<reference key="49">
    <citation type="journal article" date="1998" name="Protein Sci.">
        <title>Structures of murine carbonic anhydrase IV and human carbonic anhydrase II complexed with brinzolamide: molecular basis of isozyme-drug discrimination.</title>
        <authorList>
            <person name="Stams T."/>
            <person name="Chen Y."/>
            <person name="Boriack-Sjodin P.A."/>
            <person name="Hurt J.D."/>
            <person name="Liao J."/>
            <person name="May J.A."/>
            <person name="Dean T."/>
            <person name="Laipis P."/>
            <person name="Silverman D.N."/>
            <person name="Christianson D.W."/>
        </authorList>
    </citation>
    <scope>X-RAY CRYSTALLOGRAPHY (2.25 ANGSTROMS) IN COMPLEX WITH THE INHIBITOR BRINZOLAMIDE</scope>
</reference>
<reference key="50">
    <citation type="journal article" date="1998" name="Protein Sci.">
        <title>Structural analysis of inhibitor binding to human carbonic anhydrase II.</title>
        <authorList>
            <person name="Boriack-Sjodin P.A."/>
            <person name="Zeitlin S."/>
            <person name="Chen H.H."/>
            <person name="Crenshaw L."/>
            <person name="Gross S."/>
            <person name="Dantanarayana A."/>
            <person name="Delgado P."/>
            <person name="May J.A."/>
            <person name="Dean T."/>
            <person name="Christianson D.W."/>
        </authorList>
    </citation>
    <scope>X-RAY CRYSTALLOGRAPHY (2.10 ANGSTROMS) IN COMPLEX WITH SULFONAMIDE INHIBITORS AND ZINC ION</scope>
</reference>
<reference key="51">
    <citation type="journal article" date="1999" name="J. Biol. Inorg. Chem.">
        <title>Carbonic anhydrase catalyzes cyanamide hydration to urea: is it mimicking the physiological reaction?</title>
        <authorList>
            <person name="Briganti F."/>
            <person name="Mangani S."/>
            <person name="Scozzafava A."/>
            <person name="Vernaglione G."/>
            <person name="Supuran C.T."/>
        </authorList>
    </citation>
    <scope>X-RAY CRYSTALLOGRAPHY (1.85 ANGSTROMS) IN COMPLEX WITH CYANAMIDE AND SUBSTRATE</scope>
    <scope>FUNCTION</scope>
    <scope>CATALYTIC ACTIVITY</scope>
    <scope>BIOPHYSICOCHEMICAL PROPERTIES</scope>
</reference>
<reference key="52">
    <citation type="journal article" date="2000" name="Biochemistry">
        <title>Mechanism of cyanamide hydration catalyzed by carbonic anhydrase II suggested by cryogenic X-ray diffraction.</title>
        <authorList>
            <person name="Guerri A."/>
            <person name="Briganti F."/>
            <person name="Scozzafava A."/>
            <person name="Supuran C.T."/>
            <person name="Mangani S."/>
        </authorList>
    </citation>
    <scope>X-RAY CRYSTALLOGRAPHY (1.90 ANGSTROMS) IN COMPLEX WITH CYANAMIDE</scope>
    <scope>FUNCTION</scope>
    <scope>CATALYTIC ACTIVITY</scope>
</reference>
<reference key="53">
    <citation type="journal article" date="2000" name="Biochemistry">
        <title>Structural influence of hydrophobic core residues on metal binding and specificity in carbonic anhydrase II.</title>
        <authorList>
            <person name="Cox J.D."/>
            <person name="Hunt J.A."/>
            <person name="Compher K.M."/>
            <person name="Fierke C.A."/>
            <person name="Christianson D.W."/>
        </authorList>
    </citation>
    <scope>X-RAY CRYSTALLOGRAPHY (1.50 ANGSTROMS) OF MUTANTS ILE-93/MET-95/VAL-97 AND SER-93/LEU-95/MET-97 IN COMPLEX WITH COBALT; COPPER AND ZINC IONS</scope>
</reference>
<reference key="54">
    <citation type="journal article" date="2001" name="Biochemistry">
        <title>Structural and kinetic analysis of the chemical rescue of the proton transfer function of carbonic anhydrase II.</title>
        <authorList>
            <person name="Duda D."/>
            <person name="Tu C."/>
            <person name="Qian M."/>
            <person name="Laipis P."/>
            <person name="Agbandje-McKenna M."/>
            <person name="Silverman D.N."/>
            <person name="McKenna R."/>
        </authorList>
    </citation>
    <scope>X-RAY CRYSTALLOGRAPHY (1.60 ANGSTROMS) OF THE MUTANT ALA-64 IN COMPLEX WITH 4-METHYLIMIDAZOLE</scope>
    <scope>FUNCTION</scope>
    <scope>CATALYTIC ACTIVITY</scope>
    <scope>MUTAGENESIS OF HIS-64</scope>
</reference>
<reference key="55">
    <citation type="journal article" date="2001" name="J. Am. Chem. Soc.">
        <title>Fluoroaromatic-fluoroaromatic interactions between inhibitors bound in the crystal lattice of human carbonic anhydrase II.</title>
        <authorList>
            <person name="Kim C.Y."/>
            <person name="Chandra P.P."/>
            <person name="Jain A."/>
            <person name="Christianson D.W."/>
        </authorList>
    </citation>
    <scope>X-RAY CRYSTALLOGRAPHY (1.80 ANGSTROMS) OF MUTANT VAL-130 IN COMPLEX WITH FLUOROAROMATIC INHIBITORS</scope>
</reference>
<reference key="56">
    <citation type="journal article" date="2002" name="Biochem. J.">
        <title>Crystal structure of human carbonic anhydrase II complexed with an anti-convulsant sugar sulphamate.</title>
        <authorList>
            <person name="Recacha R."/>
            <person name="Costanzo M.J."/>
            <person name="Maryanoff B.E."/>
            <person name="Chattopadhyay D."/>
        </authorList>
    </citation>
    <scope>X-RAY CRYSTALLOGRAPHY (2.10 ANGSTROMS) IN COMPLEX WITH THE INHIBITOR SUGAR SULFAMATE RWJ-37497</scope>
    <scope>ACTIVITY REGULATION</scope>
    <scope>FUNCTION</scope>
    <scope>CATALYTIC ACTIVITY</scope>
</reference>
<reference key="57">
    <citation type="journal article" date="2002" name="Biochemistry">
        <title>Organization of an efficient carbonic anhydrase: implications for the mechanism based on structure-function studies of a T199P/C206S mutant.</title>
        <authorList>
            <person name="Huang S."/>
            <person name="Sjoeblom B."/>
            <person name="Sauer-Eriksson A.E."/>
            <person name="Jonsson B.H."/>
        </authorList>
    </citation>
    <scope>X-RAY CRYSTALLOGRAPHY (1.75 ANGSTROMS) OF THE MUTANT PRO-198/SER-205 IN COMPLEX WITH BICARBONATE AND INHIBITORS</scope>
    <scope>FUNCTION</scope>
    <scope>CATALYTIC ACTIVITY</scope>
    <scope>MUTAGENESIS OF THR-198</scope>
</reference>
<reference key="58">
    <citation type="journal article" date="2002" name="J. Biol. Chem.">
        <title>Kinetic analysis of multiple proton shuttles in the active site of human carbonic anhydrase.</title>
        <authorList>
            <person name="Tu C."/>
            <person name="Qian M."/>
            <person name="An H."/>
            <person name="Wadhwa N.R."/>
            <person name="Duda D."/>
            <person name="Yoshioka C."/>
            <person name="Pathak Y."/>
            <person name="McKenna R."/>
            <person name="Laipis P.J."/>
            <person name="Silverman D.N."/>
        </authorList>
    </citation>
    <scope>X-RAY CRYSTALLOGRAPHY (2.30 ANGSTROMS) OF THE MUTANT HIS-7</scope>
    <scope>FUNCTION</scope>
    <scope>CATALYTIC ACTIVITY</scope>
    <scope>MUTAGENESIS OF TYR-7</scope>
</reference>
<reference key="59">
    <citation type="journal article" date="2002" name="J. Med. Chem.">
        <title>Structural aspects of isozyme selectivity in the binding of inhibitors to carbonic anhydrases II and IV.</title>
        <authorList>
            <person name="Kim C.Y."/>
            <person name="Whittington D.A."/>
            <person name="Chang J.S."/>
            <person name="Liao J."/>
            <person name="May J.A."/>
            <person name="Christianson D.W."/>
        </authorList>
    </citation>
    <scope>X-RAY CRYSTALLOGRAPHY (1.93 ANGSTROMS) IN COMPLEX WITH INHIBITORS</scope>
    <scope>FUNCTION</scope>
    <scope>CATALYTIC ACTIVITY</scope>
</reference>
<reference key="60">
    <citation type="journal article" date="2002" name="J. Med. Chem.">
        <title>Successful virtual screening for novel inhibitors of human carbonic anhydrase: strategy and experimental confirmation.</title>
        <authorList>
            <person name="Grueneberg S."/>
            <person name="Stubbs M.T."/>
            <person name="Klebe G."/>
        </authorList>
    </citation>
    <scope>X-RAY CRYSTALLOGRAPHY (2.25 ANGSTROMS) IN COMPLEX WITH INHIBITORS</scope>
</reference>
<reference key="61">
    <citation type="journal article" date="2002" name="Proc. Natl. Acad. Sci. U.S.A.">
        <title>Combinatorial computational method gives new picomolar ligands for a known enzyme.</title>
        <authorList>
            <person name="Grzybowski B.A."/>
            <person name="Ishchenko A.V."/>
            <person name="Kim C.Y."/>
            <person name="Topalov G."/>
            <person name="Chapman R."/>
            <person name="Christianson D.W."/>
            <person name="Whitesides G.M."/>
            <person name="Shakhnovich E.I."/>
        </authorList>
    </citation>
    <scope>X-RAY CRYSTALLOGRAPHY (1.94 ANGSTROMS) IN COMPLEX WITH INHIBITORS</scope>
</reference>
<reference key="62">
    <citation type="journal article" date="2003" name="Acta Crystallogr. D">
        <title>The refined atomic structure of carbonic anhydrase II at 1.05 A resolution: implications of chemical rescue of proton transfer.</title>
        <authorList>
            <person name="Duda D."/>
            <person name="Govindasamy L."/>
            <person name="Agbandje-McKenna M."/>
            <person name="Tu C."/>
            <person name="Silverman D.N."/>
            <person name="McKenna R."/>
        </authorList>
    </citation>
    <scope>X-RAY CRYSTALLOGRAPHY (1.05 ANGSTROMS) OF THE MUTANT ALA-64 IN COMPLEX WITH THE INHIBITOR 4-METHYLIMIDAZOLE AND ZINC ION</scope>
</reference>
<reference key="63">
    <citation type="journal article" date="2004" name="J. Med. Chem.">
        <title>Unexpected nanomolar inhibition of carbonic anhydrase by COX-2-selective celecoxib: new pharmacological opportunities due to related binding site recognition.</title>
        <authorList>
            <person name="Weber A."/>
            <person name="Casini A."/>
            <person name="Heine A."/>
            <person name="Kuhn D."/>
            <person name="Supuran C.T."/>
            <person name="Scozzafava A."/>
            <person name="Klebe G."/>
        </authorList>
    </citation>
    <scope>X-RAY CRYSTALLOGRAPHY (1.50 ANGSTROMS) IN COMPLEX WITH INHIBITORS</scope>
    <scope>ACTIVITY REGULATION</scope>
    <scope>FUNCTION</scope>
    <scope>CATALYTIC ACTIVITY</scope>
</reference>
<reference key="64">
    <citation type="journal article" date="2005" name="Biochem. J.">
        <title>Crystal structure of human carbonic anhydrase II at 1.95 A resolution in complex with 667-coumate, a novel anti-cancer agent.</title>
        <authorList>
            <person name="Lloyd M.D."/>
            <person name="Pederick R.L."/>
            <person name="Natesh R."/>
            <person name="Woo L.W."/>
            <person name="Purohit A."/>
            <person name="Reed M.J."/>
            <person name="Acharya K.R."/>
            <person name="Potter B.V."/>
        </authorList>
    </citation>
    <scope>X-RAY CRYSTALLOGRAPHY (1.95 ANGSTROMS) IN COMPLEX WITH THE ANTI-CANCER AGENT 667-COUMATE</scope>
    <scope>FUNCTION</scope>
    <scope>CATALYTIC ACTIVITY</scope>
</reference>
<reference key="65">
    <citation type="journal article" date="2005" name="Biochemistry">
        <title>Structural and kinetic characterization of active-site histidine as a proton shuttle in catalysis by human carbonic anhydrase II.</title>
        <authorList>
            <person name="Fisher Z."/>
            <person name="Hernandez Prada J.A."/>
            <person name="Tu C."/>
            <person name="Duda D."/>
            <person name="Yoshioka C."/>
            <person name="An H."/>
            <person name="Govindasamy L."/>
            <person name="Silverman D.N."/>
            <person name="McKenna R."/>
        </authorList>
    </citation>
    <scope>X-RAY CRYSTALLOGRAPHY (1.63 ANGSTROMS)</scope>
    <scope>MUTAGENESIS OF ASN-62; HIS-64 AND ASN-67</scope>
    <scope>FUNCTION</scope>
    <scope>CATALYTIC ACTIVITY</scope>
    <scope>BIOPHYSICOCHEMICAL PROPERTIES</scope>
</reference>
<reference key="66">
    <citation type="journal article" date="2005" name="Biochemistry">
        <title>First crystal structures of human carbonic anhydrase II in complex with dual aromatase-steroid sulfatase inhibitors.</title>
        <authorList>
            <person name="Lloyd M.D."/>
            <person name="Thiyagarajan N."/>
            <person name="Ho Y.T."/>
            <person name="Woo L.W."/>
            <person name="Sutcliffe O.B."/>
            <person name="Purohit A."/>
            <person name="Reed M.J."/>
            <person name="Acharya K.R."/>
            <person name="Potter B.V."/>
        </authorList>
    </citation>
    <scope>X-RAY CRYSTALLOGRAPHY (1.76 ANGSTROMS) IN COMPLEX WITH DUAL AROMATASE-STEROID SULFATASE INHIBITORS</scope>
    <scope>FUNCTION</scope>
    <scope>CATALYTIC ACTIVITY</scope>
</reference>
<reference key="67">
    <citation type="journal article" date="2005" name="Bioorg. Med. Chem. Lett.">
        <title>Carbonic anhydrase activators: X-ray crystal structure of the adduct of human isozyme II with L-histidine as a platform for the design of stronger activators.</title>
        <authorList>
            <person name="Temperini C."/>
            <person name="Scozzafava A."/>
            <person name="Puccetti L."/>
            <person name="Supuran C.T."/>
        </authorList>
    </citation>
    <scope>X-RAY CRYSTALLOGRAPHY (2.00 ANGSTROMS) IN COMPLEX WITH ACTIVATOR L-HISTIDINE</scope>
    <scope>FUNCTION</scope>
    <scope>CATALYTIC ACTIVITY</scope>
    <scope>ACTIVITY REGULATION</scope>
</reference>
<reference key="68">
    <citation type="journal article" date="2005" name="J. Med. Chem.">
        <title>Carbonic anhydrase inhibitors: stacking with Phe131 determines active site binding region of inhibitors as exemplified by the X-ray crystal structure of a membrane-impermeant antitumor sulfonamide complexed with isozyme II.</title>
        <authorList>
            <person name="Menchise V."/>
            <person name="De Simone G."/>
            <person name="Alterio V."/>
            <person name="Di Fiore A."/>
            <person name="Pedone C."/>
            <person name="Scozzafava A."/>
            <person name="Supuran C.T."/>
        </authorList>
    </citation>
    <scope>X-RAY CRYSTALLOGRAPHY (2.00 ANGSTROMS) IN COMPLEX WITH INHIBITOR</scope>
</reference>
<reference key="69">
    <citation type="journal article" date="2005" name="Proteins">
        <title>Proton transfer in a Thr200His mutant of human carbonic anhydrase II.</title>
        <authorList>
            <person name="Bhatt D."/>
            <person name="Tu C."/>
            <person name="Fisher S.Z."/>
            <person name="Hernandez Prada J.A."/>
            <person name="McKenna R."/>
            <person name="Silverman D.N."/>
        </authorList>
    </citation>
    <scope>X-RAY CRYSTALLOGRAPHY (1.70 ANGSTROMS)</scope>
    <scope>FUNCTION</scope>
    <scope>CATALYTIC ACTIVITY</scope>
    <scope>MUTAGENESIS OF HIS-64 AND THR-199</scope>
</reference>
<reference key="70">
    <citation type="journal article" date="2006" name="Acta Crystallogr. F">
        <title>Production and X-ray crystallographic analysis of fully deuterated human carbonic anhydrase II.</title>
        <authorList>
            <person name="Budayova-Spano M."/>
            <person name="Fisher S.Z."/>
            <person name="Dauvergne M.T."/>
            <person name="Agbandje-McKenna M."/>
            <person name="Silverman D.N."/>
            <person name="Myles D.A."/>
            <person name="McKenna R."/>
        </authorList>
    </citation>
    <scope>X-RAY CRYSTALLOGRAPHY (1.50 ANGSTROMS)</scope>
</reference>
<reference key="71">
    <citation type="journal article" date="2006" name="Acta Crystallogr. F">
        <title>X-ray crystallographic studies reveal that the incorporation of spacer groups in carbonic anhydrase inhibitors causes alternate binding modes.</title>
        <authorList>
            <person name="Fisher S.Z."/>
            <person name="Govindasamy L."/>
            <person name="Boyle N."/>
            <person name="Agbandje-McKenna M."/>
            <person name="Silverman D.N."/>
            <person name="Blackburn G.M."/>
            <person name="McKenna R."/>
        </authorList>
    </citation>
    <scope>X-RAY CRYSTALLOGRAPHY (1.15 ANGSTROMS) IN COMPLEX WITH INHIBITORS</scope>
</reference>
<reference key="72">
    <citation type="journal article" date="2006" name="Bioorg. Med. Chem. Lett.">
        <title>Carbonic anhydrase inhibitors: Valdecoxib binds to a different active site region of the human isoform II as compared to the structurally related cyclooxygenase II 'selective' inhibitor celecoxib.</title>
        <authorList>
            <person name="Di Fiore A."/>
            <person name="Pedone C."/>
            <person name="D'Ambrosio K."/>
            <person name="Scozzafava A."/>
            <person name="De Simone G."/>
            <person name="Supuran C.T."/>
        </authorList>
    </citation>
    <scope>X-RAY CRYSTALLOGRAPHY (1.46 ANGSTROMS) IN COMPLEX WITH INHIBITORS VALDECOXIB AND CELECOXIB</scope>
    <scope>ACTIVITY REGULATION</scope>
    <scope>FUNCTION</scope>
    <scope>CATALYTIC ACTIVITY</scope>
</reference>
<reference key="73">
    <citation type="journal article" date="2006" name="Bioorg. Med. Chem. Lett.">
        <title>N-hydroxyurea -- a versatile zinc binding function in the design of metalloenzyme inhibitors.</title>
        <authorList>
            <person name="Temperini C."/>
            <person name="Innocenti A."/>
            <person name="Scozzafava A."/>
            <person name="Supuran C.T."/>
        </authorList>
    </citation>
    <scope>X-RAY CRYSTALLOGRAPHY (2.00 ANGSTROMS) IN COMPLEX WITH N-HYDROXYUREA</scope>
    <scope>ACTIVITY REGULATION</scope>
    <scope>FUNCTION</scope>
    <scope>CATALYTIC ACTIVITY</scope>
</reference>
<reference key="74">
    <citation type="journal article" date="2006" name="Bioorg. Med. Chem. Lett.">
        <title>Carbonic anhydrase inhibitors: X-ray crystallographic studies for the binding of 5-amino-1,3,4-thiadiazole-2-sulfonamide and 5-(4-amino-3-chloro-5-fluorophenylsulfonamido)-1,3,4-thiadiazole-2-sulfonamide to human isoform II.</title>
        <authorList>
            <person name="Menchise V."/>
            <person name="De Simone G."/>
            <person name="Di Fiore A."/>
            <person name="Scozzafava A."/>
            <person name="Supuran C.T."/>
        </authorList>
    </citation>
    <scope>X-RAY CRYSTALLOGRAPHY (1.55 ANGSTROMS) IN COMPLEX WITH INHIBITORS</scope>
</reference>
<reference key="75">
    <citation type="journal article" date="2006" name="Chemistry">
        <title>Carbonic anhydrase activators. Activation of isozymes I, II, IV, VA, VII, and XIV with l- and d-histidine and crystallographic analysis of their adducts with isoform II: engineering proton-transfer processes within the active site of an enzyme.</title>
        <authorList>
            <person name="Temperini C."/>
            <person name="Scozzafava A."/>
            <person name="Vullo D."/>
            <person name="Supuran C.T."/>
        </authorList>
    </citation>
    <scope>X-RAY CRYSTALLOGRAPHY (2.00 ANGSTROMS) IN COMPLEX WITH L- AND D-HISTIDINE</scope>
    <scope>ACTIVITY REGULATION</scope>
    <scope>FUNCTION</scope>
    <scope>CATALYTIC ACTIVITY</scope>
</reference>
<reference key="76">
    <citation type="journal article" date="2006" name="J. Am. Chem. Soc.">
        <title>Ultrahigh resolution crystal structures of human carbonic anhydrases I and II complexed with 'two-prong' inhibitors reveal the molecular basis of high affinity.</title>
        <authorList>
            <person name="Jude K.M."/>
            <person name="Banerjee A.L."/>
            <person name="Haldar M.K."/>
            <person name="Manokaran S."/>
            <person name="Roy B."/>
            <person name="Mallik S."/>
            <person name="Srivastava D.K."/>
            <person name="Christianson D.W."/>
        </authorList>
    </citation>
    <scope>X-RAY CRYSTALLOGRAPHY (0.99 ANGSTROMS) IN COMPLEX WITH TWO-PRONG INHIBITORS</scope>
</reference>
<reference key="77">
    <citation type="journal article" date="2006" name="J. Am. Chem. Soc.">
        <title>Carbonic anhydrase inhibitors: X-ray and molecular modeling study for the interaction of a fluorescent antitumor sulfonamide with isozyme II and IX.</title>
        <authorList>
            <person name="Alterio V."/>
            <person name="Vitale R.M."/>
            <person name="Monti S.M."/>
            <person name="Pedone C."/>
            <person name="Scozzafava A."/>
            <person name="Cecchi A."/>
            <person name="De Simone G."/>
            <person name="Supuran C.T."/>
        </authorList>
    </citation>
    <scope>X-RAY CRYSTALLOGRAPHY (1.71 ANGSTROMS) IN COMPLEX WITH INHIBITOR</scope>
</reference>
<reference key="78">
    <citation type="journal article" date="2006" name="J. Med. Chem.">
        <title>Carbonic anhydrase activators. Activation of isoforms I, II, IV, VA, VII, and XIV with L- and D-phenylalanine and crystallographic analysis of their adducts with isozyme II: stereospecific recognition within the active site of an enzyme and its consequences for the drug design.</title>
        <authorList>
            <person name="Temperini C."/>
            <person name="Scozzafava A."/>
            <person name="Vullo D."/>
            <person name="Supuran C.T."/>
        </authorList>
    </citation>
    <scope>X-RAY CRYSTALLOGRAPHY (1.60 ANGSTROMS) IN COMPLEX WITH L- AND D-PHENYLALANINE</scope>
    <scope>ACTIVITY REGULATION</scope>
    <scope>FUNCTION</scope>
    <scope>CATALYTIC ACTIVITY</scope>
</reference>
<reference key="79">
    <citation type="journal article" date="2006" name="J. Med. Chem.">
        <title>Carbonic anhydrase inhibitors: Hypoxia-activatable sulfonamides incorporating disulfide bonds that target the tumor-associated isoform IX.</title>
        <authorList>
            <person name="De Simone G."/>
            <person name="Vitale R.M."/>
            <person name="Di Fiore A."/>
            <person name="Pedone C."/>
            <person name="Scozzafava A."/>
            <person name="Montero J.-L."/>
            <person name="Winum J.-Y."/>
            <person name="Supuran C.T."/>
        </authorList>
    </citation>
    <scope>X-RAY CRYSTALLOGRAPHY (1.80 ANGSTROMS) IN COMPLEX WITH INHIBITOR</scope>
</reference>
<reference key="80">
    <citation type="journal article" date="2006" name="J. Med. Chem.">
        <title>Carbonic anhydrase inhibitors: clash with Ala65 as a means for designing inhibitors with low affinity for the ubiquitous isozyme II, exemplified by the crystal structure of the topiramate sulfamide analogue.</title>
        <authorList>
            <person name="Winum J.Y."/>
            <person name="Temperini C."/>
            <person name="El Cheikh K."/>
            <person name="Innocenti A."/>
            <person name="Vullo D."/>
            <person name="Ciattini S."/>
            <person name="Montero J.-L."/>
            <person name="Scozzafava A."/>
            <person name="Supuran C.T."/>
        </authorList>
    </citation>
    <scope>X-RAY CRYSTALLOGRAPHY (1.90 ANGSTROMS) IN COMPLEX WITH INHIBITOR</scope>
</reference>
<reference key="81">
    <citation type="journal article" date="2006" name="J. Med. Chem.">
        <title>2-substituted estradiol bis-sulfamates, multitargeted antitumor agents: synthesis, in vitro SAR, protein crystallography, and in vivo activity.</title>
        <authorList>
            <person name="Leese M.P."/>
            <person name="Leblond B."/>
            <person name="Smith A."/>
            <person name="Newman S.P."/>
            <person name="Di Fiore A."/>
            <person name="De Simone G."/>
            <person name="Supuran C.T."/>
            <person name="Purohit A."/>
            <person name="Reed M.J."/>
            <person name="Potter B.V."/>
        </authorList>
    </citation>
    <scope>X-RAY CRYSTALLOGRAPHY (1.46 ANGSTROMS) IN COMPLEX WITH INHIBITORS</scope>
</reference>
<reference key="82">
    <citation type="journal article" date="2007" name="Angew. Chem. Int. Ed. Engl.">
        <title>Saccharin inhibits carbonic anhydrases: possible explanation for its unpleasant metallic aftertaste.</title>
        <authorList>
            <person name="Koehler K."/>
            <person name="Hillebrecht A."/>
            <person name="Schulze Wischeler J."/>
            <person name="Innocenti A."/>
            <person name="Heine A."/>
            <person name="Supuran C.T."/>
            <person name="Klebe G."/>
        </authorList>
    </citation>
    <scope>X-RAY CRYSTALLOGRAPHY (1.70 ANGSTROMS) IN COMPLEX WITH SACCHARIN</scope>
    <scope>ACTIVITY REGULATION</scope>
    <scope>FUNCTION</scope>
    <scope>CATALYTIC ACTIVITY</scope>
</reference>
<reference key="83">
    <citation type="journal article" date="2007" name="Biochemistry">
        <title>Atomic crystal and molecular dynamics simulation structures of human carbonic anhydrase II: insights into the proton transfer mechanism.</title>
        <authorList>
            <person name="Fisher S.Z."/>
            <person name="Maupin C.M."/>
            <person name="Budayova-Spano M."/>
            <person name="Govindasamy L."/>
            <person name="Tu C."/>
            <person name="Agbandje-McKenna M."/>
            <person name="Silverman D.N."/>
            <person name="Voth G.A."/>
            <person name="McKenna R."/>
        </authorList>
    </citation>
    <scope>X-RAY CRYSTALLOGRAPHY (1.05 ANGSTROMS)</scope>
</reference>
<reference key="84">
    <citation type="journal article" date="2007" name="Biochemistry">
        <title>Speeding up proton transfer in a fast enzyme: kinetic and crystallographic studies on the effect of hydrophobic amino acid substitutions in the active site of human carbonic anhydrase II.</title>
        <authorList>
            <person name="Fisher S.Z."/>
            <person name="Tu C."/>
            <person name="Bhatt D."/>
            <person name="Govindasamy L."/>
            <person name="Agbandje-McKenna M."/>
            <person name="McKenna R."/>
            <person name="Silverman D.N."/>
        </authorList>
    </citation>
    <scope>X-RAY CRYSTALLOGRAPHY (1.15 ANGSTROMS)</scope>
    <scope>MUTAGENESIS OF TYR-7; ASN-62 AND ASN-67</scope>
    <scope>FUNCTION</scope>
    <scope>CATALYTIC ACTIVITY</scope>
    <scope>BIOPHYSICOCHEMICAL PROPERTIES</scope>
</reference>
<reference key="85">
    <citation type="journal article" date="2007" name="Bioorg. Med. Chem. Lett.">
        <title>Carbonic anhydrase activators: L-Adrenaline plugs the active site entrance of isozyme II, activating better isoforms I, IV, VA, VII, and XIV.</title>
        <authorList>
            <person name="Temperini C."/>
            <person name="Innocenti A."/>
            <person name="Scozzafava A."/>
            <person name="Mastrolorenzo A."/>
            <person name="Supuran C.T."/>
        </authorList>
    </citation>
    <scope>X-RAY CRYSTALLOGRAPHY (1.90 ANGSTROMS) IN COMPLEX WITH ACTIVATOR L-ADRENALINE</scope>
    <scope>ACTIVITY REGULATION</scope>
    <scope>FUNCTION</scope>
    <scope>CATALYTIC ACTIVITY</scope>
</reference>
<reference key="86">
    <citation type="journal article" date="2007" name="Bioorg. Med. Chem. Lett.">
        <title>Carbonic anhydrase inhibitors: binding of an antiglaucoma glycosyl-sulfanilamide derivative to human isoform II and its consequences for the drug design of enzyme inhibitors incorporating sugar moieties.</title>
        <authorList>
            <person name="Di Fiore A."/>
            <person name="Scozzafava A."/>
            <person name="Winum J.-Y."/>
            <person name="Montero J.-L."/>
            <person name="Pedone C."/>
            <person name="Supuran C.T."/>
            <person name="De Simone G."/>
        </authorList>
    </citation>
    <scope>X-RAY CRYSTALLOGRAPHY (1.55 ANGSTROMS) IN COMPLEX WITH INHIBITOR</scope>
    <scope>FUNCTION</scope>
    <scope>CATALYTIC ACTIVITY</scope>
</reference>
<reference key="87">
    <citation type="journal article" date="2007" name="Bioorg. Med. Chem. Lett.">
        <title>Carbonic anhydrase inhibitors: the X-ray crystal structure of the adduct of N-hydroxysulfamide with isozyme II explains why this new zinc binding function is effective in the design of potent inhibitors.</title>
        <authorList>
            <person name="Temperini C."/>
            <person name="Winum J.Y."/>
            <person name="Montero J.L."/>
            <person name="Scozzafava A."/>
            <person name="Supuran C.T."/>
        </authorList>
    </citation>
    <scope>X-RAY CRYSTALLOGRAPHY (2.10 ANGSTROMS) IN COMPLEX WITH INHIBITOR N-HYDROXYSULFAMIDE</scope>
    <scope>FUNCTION</scope>
    <scope>CATALYTIC ACTIVITY</scope>
</reference>
<reference key="88">
    <citation type="journal article" date="2007" name="Bioorg. Med. Chem. Lett.">
        <title>Carbonic anhydrase inhibitors: inhibition of human, bacterial, and archaeal isozymes with benzene-1,3-disulfonamides -- solution and crystallographic studies.</title>
        <authorList>
            <person name="Alterio V."/>
            <person name="De Simone G."/>
            <person name="Monti S.M."/>
            <person name="Scozzafava A."/>
            <person name="Supuran C.T."/>
        </authorList>
    </citation>
    <scope>X-RAY CRYSTALLOGRAPHY (1.60 ANGSTROMS) IN COMPLEX WITH INHIBITORS</scope>
    <scope>ACTIVITY REGULATION</scope>
    <scope>FUNCTION</scope>
    <scope>CATALYTIC ACTIVITY</scope>
</reference>
<reference key="89">
    <citation type="journal article" date="2007" name="Bioorg. Med. Chem. Lett.">
        <title>Carbonic anhydrase inhibitors. Interaction of the antiepileptic drug sulthiame with twelve mammalian isoforms: kinetic and X-ray crystallographic studies.</title>
        <authorList>
            <person name="Temperini C."/>
            <person name="Innocenti A."/>
            <person name="Mastrolorenzo A."/>
            <person name="Scozzafava A."/>
            <person name="Supuran C.T."/>
        </authorList>
    </citation>
    <scope>X-RAY CRYSTALLOGRAPHY (1.90 ANGSTROMS) IN COMPLEX WITH INHIBITORS</scope>
    <scope>ACTIVITY REGULATION</scope>
    <scope>FUNCTION</scope>
    <scope>CATALYTIC ACTIVITY</scope>
</reference>
<reference key="90">
    <citation type="journal article" date="2007" name="Biophys. J.">
        <title>Location of binding sites in small molecule rescue of human carbonic anhydrase II.</title>
        <authorList>
            <person name="Bhatt D."/>
            <person name="Fisher S.Z."/>
            <person name="Tu C."/>
            <person name="McKenna R."/>
            <person name="Silverman D.N."/>
        </authorList>
    </citation>
    <scope>X-RAY CRYSTALLOGRAPHY (1.80 ANGSTROMS) IN COMPLEX WITH 4-METHYLIMIDAZOLE</scope>
    <scope>MUTAGENESIS OF TRP-5 AND HIS-64</scope>
</reference>
<reference key="91">
    <citation type="journal article" date="2007" name="J. Am. Chem. Soc.">
        <title>Structural analysis of charge discrimination in the binding of inhibitors to human carbonic anhydrases I and II.</title>
        <authorList>
            <person name="Srivastava D.K."/>
            <person name="Jude K.M."/>
            <person name="Banerjee A.L."/>
            <person name="Haldar M."/>
            <person name="Manokaran S."/>
            <person name="Kooren J."/>
            <person name="Mallik S."/>
            <person name="Christianson D.W."/>
        </authorList>
    </citation>
    <scope>X-RAY CRYSTALLOGRAPHY (1.01 ANGSTROMS) IN COMPLEX WITH INHIBITORS</scope>
</reference>
<reference key="92">
    <citation type="journal article" date="2008" name="Biochemistry">
        <title>Inhibition of carbonic anhydrase II by thioxolone: a mechanistic and structural study.</title>
        <authorList>
            <person name="Barrese A.A. III"/>
            <person name="Genis C."/>
            <person name="Fisher S.Z."/>
            <person name="Orwenyo J.N."/>
            <person name="Kumara M.T."/>
            <person name="Dutta S.K."/>
            <person name="Phillips E."/>
            <person name="Kiddle J.J."/>
            <person name="Tu C."/>
            <person name="Silverman D.N."/>
            <person name="Govindasamy L."/>
            <person name="Agbandje-McKenna M."/>
            <person name="McKenna R."/>
            <person name="Tripp B.C."/>
        </authorList>
    </citation>
    <scope>X-RAY CRYSTALLOGRAPHY (1.60 ANGSTROMS) IN COMPLEX WITH INHIBITOR THIOXOLONE</scope>
    <scope>ACTIVITY REGULATION</scope>
    <scope>FUNCTION</scope>
    <scope>CATALYTIC ACTIVITY</scope>
</reference>
<reference key="93">
    <citation type="journal article" date="2008" name="Biochemistry">
        <title>Role of hydrophilic residues in proton transfer during catalysis by human carbonic anhydrase II.</title>
        <authorList>
            <person name="Zheng J."/>
            <person name="Avvaru B.S."/>
            <person name="Tu C."/>
            <person name="McKenna R."/>
            <person name="Silverman D.N."/>
        </authorList>
    </citation>
    <scope>X-RAY CRYSTALLOGRAPHY (1.60 ANGSTROMS) OF MUTANTS</scope>
    <scope>MUTAGENESIS OF ASN-62</scope>
    <scope>FUNCTION</scope>
    <scope>CATALYTIC ACTIVITY</scope>
    <scope>BIOPHYSICOCHEMICAL PROPERTIES</scope>
</reference>
<reference key="94">
    <citation type="journal article" date="2008" name="Bioorg. Med. Chem. Lett.">
        <title>Carbonic anhydrase inhibitors. Interaction of 2-(hydrazinocarbonyl)-3-phenyl-1H-indole-5-sulfonamide with 12 mammalian isoforms: kinetic and X-ray crystallographic studies.</title>
        <authorList>
            <person name="Guezel O."/>
            <person name="Temperini C."/>
            <person name="Innocenti A."/>
            <person name="Scozzafava A."/>
            <person name="Salman A."/>
            <person name="Supuran C.T."/>
        </authorList>
    </citation>
    <scope>X-RAY CRYSTALLOGRAPHY (1.89 ANGSTROMS) IN COMPLEX WITH INHIBITORS</scope>
    <scope>ACTIVITY REGULATION</scope>
    <scope>FUNCTION</scope>
    <scope>CATALYTIC ACTIVITY</scope>
</reference>
<reference key="95">
    <citation type="journal article" date="2008" name="Bioorg. Med. Chem. Lett.">
        <title>Carbonic anhydrase inhibitors. Interaction of 2-N,N-dimethylamino-1,3,4-thiadiazole-5-methanesulfonamide with 12 mammalian isoforms: kinetic and X-ray crystallographic studies.</title>
        <authorList>
            <person name="Temperini C."/>
            <person name="Cecchi A."/>
            <person name="Boyle N.A."/>
            <person name="Scozzafava A."/>
            <person name="Cabeza J.E."/>
            <person name="Wentworth P. Jr."/>
            <person name="Blackburn G.M."/>
            <person name="Supuran C.T."/>
        </authorList>
    </citation>
    <scope>X-RAY CRYSTALLOGRAPHY (1.90 ANGSTROMS) IN COMPLEX WITH INHIBITORS</scope>
    <scope>ACTIVITY REGULATION</scope>
    <scope>FUNCTION</scope>
    <scope>CATALYTIC ACTIVITY</scope>
</reference>
<reference key="96">
    <citation type="journal article" date="2008" name="Bioorg. Med. Chem. Lett.">
        <title>Carbonic anhydrase inhibitors. Interaction of indapamide and related diuretics with 12 mammalian isozymes and X-ray crystallographic studies for the indapamide-isozyme II adduct.</title>
        <authorList>
            <person name="Temperini C."/>
            <person name="Cecchi A."/>
            <person name="Scozzafava A."/>
            <person name="Supuran C.T."/>
        </authorList>
    </citation>
    <scope>X-RAY CRYSTALLOGRAPHY (2.10 ANGSTROMS) IN COMPLEX WITH INHIBITORS</scope>
    <scope>ACTIVITY REGULATION</scope>
    <scope>FUNCTION</scope>
    <scope>CATALYTIC ACTIVITY</scope>
</reference>
<reference key="97">
    <citation type="journal article" date="2008" name="Bioorg. Med. Chem. Lett.">
        <title>Carbonic anhydrase inhibitors: the X-ray crystal structure of ethoxzolamide complexed to human isoform II reveals the importance of thr200 and gln92 for obtaining tight-binding inhibitors.</title>
        <authorList>
            <person name="Di Fiore A."/>
            <person name="Pedone C."/>
            <person name="Antel J."/>
            <person name="Waldeck H."/>
            <person name="Witte A."/>
            <person name="Wurl M."/>
            <person name="Scozzafava A."/>
            <person name="Supuran C.T."/>
            <person name="De Simone G."/>
        </authorList>
    </citation>
    <scope>X-RAY CRYSTALLOGRAPHY (1.80 ANGSTROMS) IN COMPLEX WITH INHIBITORS</scope>
</reference>
<reference key="98">
    <citation type="journal article" date="2008" name="Bioorg. Med. Chem. Lett.">
        <title>Carbonic anhydrase inhibitors. Interaction of the antitumor sulfamate EMD 486019 with twelve mammalian carbonic anhydrase isoforms: Kinetic and X-ray crystallographic studies.</title>
        <authorList>
            <person name="Temperini C."/>
            <person name="Innocenti A."/>
            <person name="Scozzafava A."/>
            <person name="Supuran C.T."/>
        </authorList>
    </citation>
    <scope>X-RAY CRYSTALLOGRAPHY (1.90 ANGSTROMS) IN COMPLEX WITH INHIBITORS</scope>
    <scope>ACTIVITY REGULATION</scope>
    <scope>FUNCTION</scope>
    <scope>CATALYTIC ACTIVITY</scope>
</reference>
<reference key="99">
    <citation type="journal article" date="2008" name="ChemMedChem">
        <title>Carbonic anhydrase inhibitors: binding of indanesulfonamides to the human isoform II.</title>
        <authorList>
            <person name="D'Ambrosio K."/>
            <person name="Masereel B."/>
            <person name="Thiry A."/>
            <person name="Scozzafava A."/>
            <person name="Supuran C.T."/>
            <person name="De Simone G."/>
        </authorList>
    </citation>
    <scope>X-RAY CRYSTALLOGRAPHY (1.40 ANGSTROMS) IN COMPLEX WITH INHIBITORS INDANESULFONAMIDES</scope>
</reference>
<reference key="100">
    <citation type="journal article" date="2008" name="J. Am. Chem. Soc.">
        <title>Structure of a (129)Xe-cryptophane biosensor complexed with human carbonic anhydrase II.</title>
        <authorList>
            <person name="Aaron J.A."/>
            <person name="Chambers J.M."/>
            <person name="Jude K.M."/>
            <person name="Di Costanzo L."/>
            <person name="Dmochowski I.J."/>
            <person name="Christianson D.W."/>
        </authorList>
    </citation>
    <scope>X-RAY CRYSTALLOGRAPHY (1.70 ANGSTROMS) IN COMPLEX WITH (129)XE-CRYPTOPHANE BIOSENSOR</scope>
</reference>
<reference key="101">
    <citation type="journal article" date="2008" name="J. Biol. Chem.">
        <title>Entrapment of carbon dioxide in the active site of carbonic anhydrase II.</title>
        <authorList>
            <person name="Domsic J.F."/>
            <person name="Avvaru B.S."/>
            <person name="Kim C.U."/>
            <person name="Gruner S.M."/>
            <person name="Agbandje-McKenna M."/>
            <person name="Silverman D.N."/>
            <person name="McKenna R."/>
        </authorList>
    </citation>
    <scope>X-RAY CRYSTALLOGRAPHY (1.10 ANGSTROMS) IN COMPLEX WITH CO2</scope>
</reference>
<reference key="102">
    <citation type="journal article" date="2008" name="J. Med. Chem.">
        <title>Structure-activity relationships of C-17 cyano-substituted estratrienes as anticancer agents.</title>
        <authorList>
            <person name="Leese M.P."/>
            <person name="Jourdan F.L."/>
            <person name="Gaukroger K."/>
            <person name="Mahon M.F."/>
            <person name="Newman S.P."/>
            <person name="Foster P.A."/>
            <person name="Stengel C."/>
            <person name="Regis-Lydi S."/>
            <person name="Ferrandis E."/>
            <person name="Di Fiore A."/>
            <person name="De Simone G."/>
            <person name="Supuran C.T."/>
            <person name="Purohit A."/>
            <person name="Reed M.J."/>
            <person name="Potter B.V."/>
        </authorList>
    </citation>
    <scope>X-RAY CRYSTALLOGRAPHY (1.85 ANGSTROMS) IN COMPLEX WITH INHIBITORS</scope>
</reference>
<reference key="103">
    <citation type="journal article" date="2008" name="J. Med. Chem.">
        <title>Carbonic anhydrase inhibitors: bioreductive nitro-containing sulfonamides with selectivity for targeting the tumor associated isoforms IX and XII.</title>
        <authorList>
            <person name="D'Ambrosio K."/>
            <person name="Vitale R.-M."/>
            <person name="Dogne J.-M."/>
            <person name="Masereel B."/>
            <person name="Innocenti A."/>
            <person name="Scozzafava A."/>
            <person name="De Simone G."/>
            <person name="Supuran C.T."/>
        </authorList>
    </citation>
    <scope>X-RAY CRYSTALLOGRAPHY (1.45 ANGSTROMS) IN COMPLEX WITH INHIBITORS</scope>
    <scope>ACTIVITY REGULATION</scope>
    <scope>FUNCTION</scope>
    <scope>CATALYTIC ACTIVITY</scope>
</reference>
<reference key="104">
    <citation type="journal article" date="2008" name="Mol. Cancer Ther.">
        <title>Anticancer steroid sulfatase inhibitors: synthesis of a potent fluorinated second-generation agent, in vitro and in vivo activities, molecular modeling, and protein crystallography.</title>
        <authorList>
            <person name="Woo L.W.L."/>
            <person name="Fischer D.S."/>
            <person name="Sharland C.M."/>
            <person name="Trusselle M."/>
            <person name="Foster P.A."/>
            <person name="Chander S.K."/>
            <person name="Di Fiore A."/>
            <person name="Supuran C.T."/>
            <person name="De Simone G."/>
            <person name="Purohit A."/>
            <person name="Reed M.J."/>
            <person name="Potter B.V.L."/>
        </authorList>
    </citation>
    <scope>X-RAY CRYSTALLOGRAPHY (1.70 ANGSTROMS) IN COMPLEX WITH INHIBITORS</scope>
</reference>
<reference key="105">
    <citation type="journal article" date="2009" name="Biochemistry">
        <title>Design of a carbonic anhydrase IX active-site mimic to screen inhibitors for possible anticancer properties.</title>
        <authorList>
            <person name="Genis C."/>
            <person name="Sippel K.H."/>
            <person name="Case N."/>
            <person name="Cao W."/>
            <person name="Avvaru B.S."/>
            <person name="Tartaglia L.J."/>
            <person name="Govindasamy L."/>
            <person name="Tu C."/>
            <person name="Agbandje-McKenna M."/>
            <person name="Silverman D.N."/>
            <person name="Rosser C.J."/>
            <person name="McKenna R."/>
        </authorList>
    </citation>
    <scope>X-RAY CRYSTALLOGRAPHY (1.48 ANGSTROMS) IN COMPLEX WITH INHIBITORS</scope>
    <scope>ACTIVITY REGULATION</scope>
    <scope>MUTAGENESIS OF ALA-65 AND ASN-67</scope>
    <scope>FUNCTION</scope>
    <scope>CATALYTIC ACTIVITY</scope>
</reference>
<reference key="106">
    <citation type="journal article" date="2009" name="Biochemistry">
        <title>Apo-human carbonic anhydrase II revisited: implications of the loss of a metal in protein structure, stability, and solvent network.</title>
        <authorList>
            <person name="Avvaru B.S."/>
            <person name="Busby S.A."/>
            <person name="Chalmers M.J."/>
            <person name="Griffin P.R."/>
            <person name="Venkatakrishnan B."/>
            <person name="Agbandje-McKenna M."/>
            <person name="Silverman D.N."/>
            <person name="McKenna R."/>
        </authorList>
    </citation>
    <scope>X-RAY CRYSTALLOGRAPHY (1.26 ANGSTROMS) FREE AND IN COMPLEX WITH ZINC ION</scope>
    <scope>COFACTOR</scope>
</reference>
<reference key="107">
    <citation type="journal article" date="2009" name="Bioorg. Med. Chem. Lett.">
        <title>A thiabendazole sulfonamide shows potent inhibitory activity against mammalian and nematode alpha-carbonic anhydrases.</title>
        <authorList>
            <person name="Crocetti L."/>
            <person name="Maresca A."/>
            <person name="Temperini C."/>
            <person name="Hall R.A."/>
            <person name="Scozzafava A."/>
            <person name="Muehlschlegel F.A."/>
            <person name="Supuran C.T."/>
        </authorList>
    </citation>
    <scope>X-RAY CRYSTALLOGRAPHY (1.81 ANGSTROMS) OF 1-260 IN COMPLEX WITH INHIBITOR THIABENDAZOLE-5-SULFONAMIDE</scope>
    <scope>ACTIVITY REGULATION</scope>
    <scope>FUNCTION</scope>
    <scope>CATALYTIC ACTIVITY</scope>
</reference>
<reference key="108">
    <citation type="journal article" date="2009" name="J. Am. Chem. Soc.">
        <title>Non-zinc mediated inhibition of carbonic anhydrases: coumarins are a new class of suicide inhibitors.</title>
        <authorList>
            <person name="Maresca A."/>
            <person name="Temperini C."/>
            <person name="Vu H."/>
            <person name="Pham N.B."/>
            <person name="Poulsen S.-A."/>
            <person name="Scozzafava A."/>
            <person name="Quinn R.J."/>
            <person name="Supuran C.T."/>
        </authorList>
    </citation>
    <scope>X-RAY CRYSTALLOGRAPHY (2.00 ANGSTROMS) OF 1-260 IN COMPLEX WITH COUMARIN INHIBITORS</scope>
    <scope>ACTIVITY REGULATION</scope>
    <scope>FUNCTION</scope>
    <scope>CATALYTIC ACTIVITY</scope>
</reference>
<reference key="109">
    <citation type="journal article" date="2009" name="J. Med. Chem.">
        <title>Carbonic anhydrase inhibitors. Comparison of chlorthalidone and indapamide X-ray crystal structures in adducts with isozyme II: when three water molecules and the keto-enol tautomerism make the difference.</title>
        <authorList>
            <person name="Temperini C."/>
            <person name="Cecchi A."/>
            <person name="Scozzafava A."/>
            <person name="Supuran C.T."/>
        </authorList>
    </citation>
    <scope>X-RAY CRYSTALLOGRAPHY (1.90 ANGSTROMS) IN COMPLEX WITH INHIBITORS</scope>
</reference>
<reference key="110">
    <citation type="journal article" date="2009" name="J. Med. Chem.">
        <title>Carbonic anhydrase inhibitors. Comparison of aliphatic sulfamate/bis-sulfamate adducts with isozymes II and IX as a platform for designing tight-binding, more isoform-selective inhibitors.</title>
        <authorList>
            <person name="Vitale R.M."/>
            <person name="Alterio V."/>
            <person name="Innocenti A."/>
            <person name="Winum J.-Y."/>
            <person name="Monti S.M."/>
            <person name="De Simone G."/>
            <person name="Supuran C.T."/>
        </authorList>
    </citation>
    <scope>X-RAY CRYSTALLOGRAPHY (1.41 ANGSTROMS) IN COMPLEX WITH INHIBITORS</scope>
</reference>
<reference key="111">
    <citation type="journal article" date="2009" name="J. Med. Chem.">
        <title>S-glycosyl primary sulfonamides--a new structural class for selective inhibition of cancer-associated carbonic anhydrases.</title>
        <authorList>
            <person name="Lopez M."/>
            <person name="Paul B."/>
            <person name="Hofmann A."/>
            <person name="Morizzi J."/>
            <person name="Wu Q.K."/>
            <person name="Charman S.A."/>
            <person name="Innocenti A."/>
            <person name="Vullo D."/>
            <person name="Supuran C.T."/>
            <person name="Poulsen S.-A."/>
        </authorList>
    </citation>
    <scope>X-RAY CRYSTALLOGRAPHY (1.80 ANGSTROMS) OF 1-260 IN COMPLEX WITH INHIBITORS</scope>
</reference>
<reference key="112">
    <citation type="journal article" date="2009" name="J. Phys. Chem. B">
        <title>Dissecting the inhibition mechanism of cytosolic versus transmembrane carbonic anhydrases by ESR.</title>
        <authorList>
            <person name="Ciani L."/>
            <person name="Cecchi A."/>
            <person name="Temperini C."/>
            <person name="Supuran C.T."/>
            <person name="Ristori S."/>
        </authorList>
    </citation>
    <scope>X-RAY CRYSTALLOGRAPHY (1.85 ANGSTROMS) OF 1-260 IN COMPLEX WITH INHIBITORS</scope>
    <scope>ACTIVITY REGULATION</scope>
    <scope>FUNCTION</scope>
    <scope>CATALYTIC ACTIVITY</scope>
</reference>
<reference key="113">
    <citation type="journal article" date="2009" name="Proc. Natl. Acad. Sci. U.S.A.">
        <title>Structural study of X-ray induced activation of carbonic anhydrase.</title>
        <authorList>
            <person name="Sjoeblom B."/>
            <person name="Polentarutti M."/>
            <person name="Djinovic-Carugo K."/>
        </authorList>
    </citation>
    <scope>X-RAY CRYSTALLOGRAPHY (1.56 ANGSTROMS) IN COMPLEX WITH SUBSTRATES</scope>
    <scope>ACTIVITY REGULATION</scope>
    <scope>FUNCTION</scope>
    <scope>CATALYTIC ACTIVITY</scope>
</reference>
<reference key="114">
    <citation type="journal article" date="1982" name="Biochem. Genet.">
        <title>Chemical and enzymological characterization of an Indonesian variant of human erythrocyte carbonic anhydrase II, CAII Jogjakarta (17 Lys leads to Glu).</title>
        <authorList>
            <person name="Jones G.L."/>
            <person name="Sofro A.S.M."/>
            <person name="Shaw D.C."/>
        </authorList>
    </citation>
    <scope>VARIANT JOGJAKARTA GLU-18</scope>
</reference>
<reference key="115">
    <citation type="journal article" date="1983" name="Hum. Genet.">
        <title>A chemical and enzymological comparison of the common major human erythrocyte carbonic anhydrase II, its minor component, and a new genetic variant, CA II Melbourne (237 Pro leads to His).</title>
        <authorList>
            <person name="Jones G.L."/>
            <person name="Shaw D.C."/>
        </authorList>
    </citation>
    <scope>VARIANT MELBOURNE HIS-236</scope>
</reference>
<reference key="116">
    <citation type="journal article" date="1991" name="Am. J. Hum. Genet.">
        <title>Carbonic anhydrase II deficiency syndrome in a Belgian family is caused by a point mutation at an invariant histidine residue (107 His--&gt;Tyr): complete structure of the normal human CA II gene.</title>
        <authorList>
            <person name="Venta P.J."/>
            <person name="Welty R.J."/>
            <person name="Johnson T.M."/>
            <person name="Sly W.S."/>
            <person name="Tashian R.E."/>
        </authorList>
    </citation>
    <scope>VARIANT OPTB3 TYR-107</scope>
</reference>
<reference key="117">
    <citation type="journal article" date="1992" name="Proc. Natl. Acad. Sci. U.S.A.">
        <title>Molecular basis of human carbonic anhydrase II deficiency.</title>
        <authorList>
            <person name="Roth D.E."/>
            <person name="Venta P.J."/>
            <person name="Tashian R.E."/>
            <person name="Sly W.S."/>
        </authorList>
    </citation>
    <scope>VARIANT OPTB3 TYR-107</scope>
</reference>
<reference key="118">
    <citation type="journal article" date="1996" name="Hum. Genet.">
        <title>A point mutation in exon 3 (His 107--&gt;Tyr) in two unrelated Japanese patients with carbonic anhydrase II deficiency with central nervous system involvement.</title>
        <authorList>
            <person name="Soda H."/>
            <person name="Yukizane S."/>
            <person name="Yoshida I."/>
            <person name="Koga Y."/>
            <person name="Aramaki S."/>
            <person name="Kato H."/>
        </authorList>
    </citation>
    <scope>VARIANT OPTB3 TYR-107</scope>
</reference>
<reference key="119">
    <citation type="journal article" date="1997" name="Hum. Mutat.">
        <title>Seven novel mutations in carbonic anhydrase II deficiency syndrome identified by SSCP and direct sequencing analysis.</title>
        <authorList>
            <person name="Hu P.Y."/>
            <person name="Lim E.J."/>
            <person name="Ciccolella J."/>
            <person name="Strisciuglio P."/>
            <person name="Sly W.S."/>
        </authorList>
    </citation>
    <scope>VARIANT OPTB3 PRO-92</scope>
</reference>
<reference key="120">
    <citation type="journal article" date="2004" name="Hum. Mutat.">
        <title>Carbonic anhydrase II deficiency syndrome (osteopetrosis with renal tubular acidosis and brain calcification): novel mutations in CA2 identified by direct sequencing expand the opportunity for genotype-phenotype correlation.</title>
        <authorList>
            <person name="Shah G.N."/>
            <person name="Bonapace G."/>
            <person name="Hu P.Y."/>
            <person name="Strisciuglio P."/>
            <person name="Sly W.S."/>
        </authorList>
    </citation>
    <scope>VARIANTS OPTB3 PRO-92; TYR-94; TYR-107 AND ARG-144</scope>
    <scope>FUNCTION</scope>
    <scope>CATALYTIC ACTIVITY</scope>
    <scope>CHARACTERIZATION OF VARIANTS TYR-94 AND ARG-144</scope>
</reference>